<protein>
    <recommendedName>
        <fullName>Histone H3.2</fullName>
    </recommendedName>
</protein>
<sequence length="136" mass="15284">MARTKQTARKSTGGKAPRKQLATKAARKSAPATGGVKKPHRFRPGTVALREIRKYQKSTELLIRKLPFQRLVREIAQDFKTDLRFQSSAVSALQEAAEAYLVGLFEDTNLCAIHAKRVTIMPKDIQLARRIRGERA</sequence>
<comment type="function">
    <text>Core component of nucleosome. Nucleosomes wrap and compact DNA into chromatin, limiting DNA accessibility to the cellular machineries which require DNA as a template. Histones thereby play a central role in transcription regulation, DNA repair, DNA replication and chromosomal stability. DNA accessibility is regulated via a complex set of post-translational modifications of histones, also called histone code, and nucleosome remodeling.</text>
</comment>
<comment type="subunit">
    <text>The nucleosome is a histone octamer containing two molecules each of H2A, H2B, H3 and H4 assembled in one H3-H4 heterotetramer and two H2A-H2B heterodimers. The octamer wraps approximately 147 bp of DNA.</text>
</comment>
<comment type="subcellular location">
    <subcellularLocation>
        <location>Nucleus</location>
    </subcellularLocation>
    <subcellularLocation>
        <location>Chromosome</location>
    </subcellularLocation>
</comment>
<comment type="PTM">
    <text evidence="1">Acetylation is generally linked to gene activation. Can be acetylated to form H3K9ac, H3K14ac, H3K18ac and H3K23ac. H3K9ac could compete with H3K9me and prevent gene silencing. H3K9ac is restricted to euchromatin (By similarity).</text>
</comment>
<comment type="PTM">
    <text evidence="1">Methylated to form mainly H3K4me, H3K9me, H3K18me, H3K23me, H3K27me and H3K36me. H3K4me1/2/3, H3K9me3, H3K27me3 and H3K36me1/2/3 are typical marks for euchromatin, whereas heterochromatic chromocenters are enriched in H3K9me1/2 and H3K27me1/2. H2BK143ub1 is probably prerequisite for H3K4me (By similarity).</text>
</comment>
<comment type="PTM">
    <text evidence="1">Can be phosphorylated to form H3S10ph, H3T11ph and H3S28ph.</text>
</comment>
<comment type="similarity">
    <text evidence="4">Belongs to the histone H3 family.</text>
</comment>
<comment type="caution">
    <text evidence="4">To ensure consistency between histone entries, we follow the 'Brno' nomenclature for histone modifications, with positions referring to those used in the literature for the 'closest' model organism. Due to slight variations in histone sequences between organisms and to the presence of initiator methionine in UniProtKB/Swiss-Prot sequences, the actual positions of modified amino acids in the sequence generally differ. In this entry the following conventions are used: H3K4me = methylated Lys-5; H3K9ac = acetylated Lys-10; H3K9me = methylated Lys-10; H3S10ph = phosphorylated Ser-11; H3T11ph = phosphorylated Thr-12; H3K14ac = acetylated Lys-15; H3K18ac = acetylated Lys-19; H3K18me = methylated Lys-19; H3K23ac = acetylated Lys-24; H3K23me = methylated Lys-24; H3K27me = methylated Lys-28; H3S28ph = phosphorylated Ser-29; H3K36me = methylated Lys-37.</text>
</comment>
<dbReference type="EMBL" id="X00937">
    <property type="protein sequence ID" value="CAA25451.1"/>
    <property type="molecule type" value="Genomic_DNA"/>
</dbReference>
<dbReference type="PIR" id="A26014">
    <property type="entry name" value="A26014"/>
</dbReference>
<dbReference type="PIR" id="S00373">
    <property type="entry name" value="S00373"/>
</dbReference>
<dbReference type="RefSeq" id="NP_001413684.1">
    <property type="nucleotide sequence ID" value="NM_001426755.1"/>
</dbReference>
<dbReference type="RefSeq" id="XP_044324436.1">
    <property type="nucleotide sequence ID" value="XM_044468501.1"/>
</dbReference>
<dbReference type="RefSeq" id="XP_044332435.1">
    <property type="nucleotide sequence ID" value="XM_044476500.1"/>
</dbReference>
<dbReference type="RefSeq" id="XP_044332667.1">
    <property type="nucleotide sequence ID" value="XM_044476732.1"/>
</dbReference>
<dbReference type="RefSeq" id="XP_044335838.1">
    <property type="nucleotide sequence ID" value="XM_044479903.1"/>
</dbReference>
<dbReference type="RefSeq" id="XP_044336576.1">
    <property type="nucleotide sequence ID" value="XM_044480641.1"/>
</dbReference>
<dbReference type="RefSeq" id="XP_044342287.1">
    <property type="nucleotide sequence ID" value="XM_044486352.1"/>
</dbReference>
<dbReference type="RefSeq" id="XP_044344274.1">
    <property type="nucleotide sequence ID" value="XM_044488339.1"/>
</dbReference>
<dbReference type="RefSeq" id="XP_044344331.1">
    <property type="nucleotide sequence ID" value="XM_044488396.1"/>
</dbReference>
<dbReference type="RefSeq" id="XP_044344454.1">
    <property type="nucleotide sequence ID" value="XM_044488519.1"/>
</dbReference>
<dbReference type="RefSeq" id="XP_044356026.1">
    <property type="nucleotide sequence ID" value="XM_044500091.1"/>
</dbReference>
<dbReference type="RefSeq" id="XP_044358633.1">
    <property type="nucleotide sequence ID" value="XM_044502698.1"/>
</dbReference>
<dbReference type="RefSeq" id="XP_044361142.1">
    <property type="nucleotide sequence ID" value="XM_044505207.1"/>
</dbReference>
<dbReference type="RefSeq" id="XP_044362335.1">
    <property type="nucleotide sequence ID" value="XM_044506400.1"/>
</dbReference>
<dbReference type="RefSeq" id="XP_044362590.1">
    <property type="nucleotide sequence ID" value="XM_044506655.1"/>
</dbReference>
<dbReference type="RefSeq" id="XP_044371065.1">
    <property type="nucleotide sequence ID" value="XM_044515130.1"/>
</dbReference>
<dbReference type="RefSeq" id="XP_044376131.1">
    <property type="nucleotide sequence ID" value="XM_044520196.1"/>
</dbReference>
<dbReference type="RefSeq" id="XP_044376419.1">
    <property type="nucleotide sequence ID" value="XM_044520484.1"/>
</dbReference>
<dbReference type="RefSeq" id="XP_044388551.1">
    <property type="nucleotide sequence ID" value="XM_044532616.1"/>
</dbReference>
<dbReference type="RefSeq" id="XP_044397193.1">
    <property type="nucleotide sequence ID" value="XM_044541258.1"/>
</dbReference>
<dbReference type="RefSeq" id="XP_044405743.1">
    <property type="nucleotide sequence ID" value="XM_044549808.1"/>
</dbReference>
<dbReference type="RefSeq" id="XP_044405756.1">
    <property type="nucleotide sequence ID" value="XM_044549821.1"/>
</dbReference>
<dbReference type="RefSeq" id="XP_044406065.1">
    <property type="nucleotide sequence ID" value="XM_044550130.1"/>
</dbReference>
<dbReference type="RefSeq" id="XP_044407483.1">
    <property type="nucleotide sequence ID" value="XM_044551548.1"/>
</dbReference>
<dbReference type="RefSeq" id="XP_044407792.1">
    <property type="nucleotide sequence ID" value="XM_044551857.1"/>
</dbReference>
<dbReference type="RefSeq" id="XP_044408318.1">
    <property type="nucleotide sequence ID" value="XM_044552383.1"/>
</dbReference>
<dbReference type="RefSeq" id="XP_044410941.1">
    <property type="nucleotide sequence ID" value="XM_044555006.1"/>
</dbReference>
<dbReference type="RefSeq" id="XP_044410944.1">
    <property type="nucleotide sequence ID" value="XM_044555009.1"/>
</dbReference>
<dbReference type="RefSeq" id="XP_044417318.1">
    <property type="nucleotide sequence ID" value="XM_044561383.1"/>
</dbReference>
<dbReference type="RefSeq" id="XP_044417347.1">
    <property type="nucleotide sequence ID" value="XM_044561412.1"/>
</dbReference>
<dbReference type="RefSeq" id="XP_044417466.1">
    <property type="nucleotide sequence ID" value="XM_044561531.1"/>
</dbReference>
<dbReference type="RefSeq" id="XP_044417473.1">
    <property type="nucleotide sequence ID" value="XM_044561538.1"/>
</dbReference>
<dbReference type="RefSeq" id="XP_044417485.1">
    <property type="nucleotide sequence ID" value="XM_044561550.1"/>
</dbReference>
<dbReference type="RefSeq" id="XP_044418155.1">
    <property type="nucleotide sequence ID" value="XM_044562220.1"/>
</dbReference>
<dbReference type="RefSeq" id="XP_044418172.1">
    <property type="nucleotide sequence ID" value="XM_044562237.1"/>
</dbReference>
<dbReference type="RefSeq" id="XP_044418517.1">
    <property type="nucleotide sequence ID" value="XM_044562582.1"/>
</dbReference>
<dbReference type="RefSeq" id="XP_044419107.1">
    <property type="nucleotide sequence ID" value="XM_044563172.1"/>
</dbReference>
<dbReference type="RefSeq" id="XP_044423846.1">
    <property type="nucleotide sequence ID" value="XM_044567911.1"/>
</dbReference>
<dbReference type="RefSeq" id="XP_044425950.1">
    <property type="nucleotide sequence ID" value="XM_044570015.1"/>
</dbReference>
<dbReference type="RefSeq" id="XP_044427342.1">
    <property type="nucleotide sequence ID" value="XM_044571407.1"/>
</dbReference>
<dbReference type="RefSeq" id="XP_044427540.1">
    <property type="nucleotide sequence ID" value="XM_044571605.1"/>
</dbReference>
<dbReference type="RefSeq" id="XP_044434313.1">
    <property type="nucleotide sequence ID" value="XM_044578378.1"/>
</dbReference>
<dbReference type="RefSeq" id="XP_044434503.1">
    <property type="nucleotide sequence ID" value="XM_044578568.1"/>
</dbReference>
<dbReference type="RefSeq" id="XP_044434774.1">
    <property type="nucleotide sequence ID" value="XM_044578839.1"/>
</dbReference>
<dbReference type="RefSeq" id="XP_044434873.1">
    <property type="nucleotide sequence ID" value="XM_044578938.1"/>
</dbReference>
<dbReference type="RefSeq" id="XP_044434895.1">
    <property type="nucleotide sequence ID" value="XM_044578960.1"/>
</dbReference>
<dbReference type="RefSeq" id="XP_044434957.1">
    <property type="nucleotide sequence ID" value="XM_044579022.1"/>
</dbReference>
<dbReference type="RefSeq" id="XP_044435390.1">
    <property type="nucleotide sequence ID" value="XM_044579455.1"/>
</dbReference>
<dbReference type="RefSeq" id="XP_044435393.1">
    <property type="nucleotide sequence ID" value="XM_044579458.1"/>
</dbReference>
<dbReference type="RefSeq" id="XP_044437554.1">
    <property type="nucleotide sequence ID" value="XM_044581619.1"/>
</dbReference>
<dbReference type="RefSeq" id="XP_044437555.1">
    <property type="nucleotide sequence ID" value="XM_044581620.1"/>
</dbReference>
<dbReference type="RefSeq" id="XP_044439280.1">
    <property type="nucleotide sequence ID" value="XM_044583345.1"/>
</dbReference>
<dbReference type="RefSeq" id="XP_044439481.1">
    <property type="nucleotide sequence ID" value="XM_044583546.1"/>
</dbReference>
<dbReference type="RefSeq" id="XP_044439796.1">
    <property type="nucleotide sequence ID" value="XM_044583861.1"/>
</dbReference>
<dbReference type="RefSeq" id="XP_044442289.1">
    <property type="nucleotide sequence ID" value="XM_044586354.1"/>
</dbReference>
<dbReference type="RefSeq" id="XP_044442585.1">
    <property type="nucleotide sequence ID" value="XM_044586650.1"/>
</dbReference>
<dbReference type="RefSeq" id="XP_044442940.1">
    <property type="nucleotide sequence ID" value="XM_044587005.1"/>
</dbReference>
<dbReference type="RefSeq" id="XP_044445671.1">
    <property type="nucleotide sequence ID" value="XM_044589736.1"/>
</dbReference>
<dbReference type="RefSeq" id="XP_044445672.1">
    <property type="nucleotide sequence ID" value="XM_044589737.1"/>
</dbReference>
<dbReference type="RefSeq" id="XP_044446424.1">
    <property type="nucleotide sequence ID" value="XM_044590489.1"/>
</dbReference>
<dbReference type="RefSeq" id="XP_044447506.1">
    <property type="nucleotide sequence ID" value="XM_044591571.1"/>
</dbReference>
<dbReference type="RefSeq" id="XP_044450059.1">
    <property type="nucleotide sequence ID" value="XM_044594124.1"/>
</dbReference>
<dbReference type="RefSeq" id="XP_044450061.1">
    <property type="nucleotide sequence ID" value="XM_044594126.1"/>
</dbReference>
<dbReference type="RefSeq" id="XP_044450576.1">
    <property type="nucleotide sequence ID" value="XM_044594641.1"/>
</dbReference>
<dbReference type="RefSeq" id="XP_044451412.1">
    <property type="nucleotide sequence ID" value="XM_044595477.1"/>
</dbReference>
<dbReference type="RefSeq" id="XP_044451413.1">
    <property type="nucleotide sequence ID" value="XM_044595478.1"/>
</dbReference>
<dbReference type="RefSeq" id="XP_044451428.1">
    <property type="nucleotide sequence ID" value="XM_044595493.1"/>
</dbReference>
<dbReference type="RefSeq" id="XP_044451429.1">
    <property type="nucleotide sequence ID" value="XM_044595494.1"/>
</dbReference>
<dbReference type="RefSeq" id="XP_044458293.1">
    <property type="nucleotide sequence ID" value="XM_044602358.1"/>
</dbReference>
<dbReference type="SMR" id="P68428"/>
<dbReference type="STRING" id="4565.P68428"/>
<dbReference type="PaxDb" id="4565-Traes_1AL_3C825BAE8.3"/>
<dbReference type="EnsemblPlants" id="TraesARI1A03G00108990.1">
    <property type="protein sequence ID" value="TraesARI1A03G00108990.1.CDS1"/>
    <property type="gene ID" value="TraesARI1A03G00108990"/>
</dbReference>
<dbReference type="EnsemblPlants" id="TraesARI1A03G00121700.1">
    <property type="protein sequence ID" value="TraesARI1A03G00121700.1.CDS1"/>
    <property type="gene ID" value="TraesARI1A03G00121700"/>
</dbReference>
<dbReference type="EnsemblPlants" id="TraesARI1A03G00125700.1">
    <property type="protein sequence ID" value="TraesARI1A03G00125700.1.CDS1"/>
    <property type="gene ID" value="TraesARI1A03G00125700"/>
</dbReference>
<dbReference type="EnsemblPlants" id="TraesARI1A03G00155450.1">
    <property type="protein sequence ID" value="TraesARI1A03G00155450.1.CDS1"/>
    <property type="gene ID" value="TraesARI1A03G00155450"/>
</dbReference>
<dbReference type="EnsemblPlants" id="TraesARI1A03G00155560.1">
    <property type="protein sequence ID" value="TraesARI1A03G00155560.1.CDS1"/>
    <property type="gene ID" value="TraesARI1A03G00155560"/>
</dbReference>
<dbReference type="EnsemblPlants" id="TraesARI1A03G00155970.1">
    <property type="protein sequence ID" value="TraesARI1A03G00155970.1.CDS1"/>
    <property type="gene ID" value="TraesARI1A03G00155970"/>
</dbReference>
<dbReference type="EnsemblPlants" id="TraesARI1B03G00311320.1">
    <property type="protein sequence ID" value="TraesARI1B03G00311320.1.CDS1"/>
    <property type="gene ID" value="TraesARI1B03G00311320"/>
</dbReference>
<dbReference type="EnsemblPlants" id="TraesARI1B03G00311360.1">
    <property type="protein sequence ID" value="TraesARI1B03G00311360.1.CDS1"/>
    <property type="gene ID" value="TraesARI1B03G00311360"/>
</dbReference>
<dbReference type="EnsemblPlants" id="TraesARI1B03G00328320.1">
    <property type="protein sequence ID" value="TraesARI1B03G00328320.1.CDS1"/>
    <property type="gene ID" value="TraesARI1B03G00328320"/>
</dbReference>
<dbReference type="EnsemblPlants" id="TraesARI1B03G00369110.1">
    <property type="protein sequence ID" value="TraesARI1B03G00369110.1.CDS1"/>
    <property type="gene ID" value="TraesARI1B03G00369110"/>
</dbReference>
<dbReference type="EnsemblPlants" id="TraesARI1B03G00369620.1">
    <property type="protein sequence ID" value="TraesARI1B03G00369620.1.CDS1"/>
    <property type="gene ID" value="TraesARI1B03G00369620"/>
</dbReference>
<dbReference type="EnsemblPlants" id="TraesARI1B03G00370000.1">
    <property type="protein sequence ID" value="TraesARI1B03G00370000.1.CDS1"/>
    <property type="gene ID" value="TraesARI1B03G00370000"/>
</dbReference>
<dbReference type="EnsemblPlants" id="TraesARI1B03G00370140.1">
    <property type="protein sequence ID" value="TraesARI1B03G00370140.1.CDS1"/>
    <property type="gene ID" value="TraesARI1B03G00370140"/>
</dbReference>
<dbReference type="EnsemblPlants" id="TraesARI1B03G00370180.1">
    <property type="protein sequence ID" value="TraesARI1B03G00370180.1.CDS1"/>
    <property type="gene ID" value="TraesARI1B03G00370180"/>
</dbReference>
<dbReference type="EnsemblPlants" id="TraesARI1D03G00508440.1">
    <property type="protein sequence ID" value="TraesARI1D03G00508440.1.CDS1"/>
    <property type="gene ID" value="TraesARI1D03G00508440"/>
</dbReference>
<dbReference type="EnsemblPlants" id="TraesARI1D03G00518590.1">
    <property type="protein sequence ID" value="TraesARI1D03G00518590.1.CDS1"/>
    <property type="gene ID" value="TraesARI1D03G00518590"/>
</dbReference>
<dbReference type="EnsemblPlants" id="TraesARI1D03G00523380.1">
    <property type="protein sequence ID" value="TraesARI1D03G00523380.1.CDS1"/>
    <property type="gene ID" value="TraesARI1D03G00523380"/>
</dbReference>
<dbReference type="EnsemblPlants" id="TraesARI1D03G00554980.1">
    <property type="protein sequence ID" value="TraesARI1D03G00554980.1.CDS1"/>
    <property type="gene ID" value="TraesARI1D03G00554980"/>
</dbReference>
<dbReference type="EnsemblPlants" id="TraesARI1D03G00555070.1">
    <property type="protein sequence ID" value="TraesARI1D03G00555070.1.CDS1"/>
    <property type="gene ID" value="TraesARI1D03G00555070"/>
</dbReference>
<dbReference type="EnsemblPlants" id="TraesARI1D03G00555580.1">
    <property type="protein sequence ID" value="TraesARI1D03G00555580.1.CDS1"/>
    <property type="gene ID" value="TraesARI1D03G00555580"/>
</dbReference>
<dbReference type="EnsemblPlants" id="TraesARI1D03G00555670.1">
    <property type="protein sequence ID" value="TraesARI1D03G00555670.1.CDS1"/>
    <property type="gene ID" value="TraesARI1D03G00555670"/>
</dbReference>
<dbReference type="EnsemblPlants" id="TraesARI2A03G00725020.1">
    <property type="protein sequence ID" value="TraesARI2A03G00725020.1.CDS1"/>
    <property type="gene ID" value="TraesARI2A03G00725020"/>
</dbReference>
<dbReference type="EnsemblPlants" id="TraesARI2A03G00754640.1">
    <property type="protein sequence ID" value="TraesARI2A03G00754640.1.CDS1"/>
    <property type="gene ID" value="TraesARI2A03G00754640"/>
</dbReference>
<dbReference type="EnsemblPlants" id="TraesARI2B03G00900180.1">
    <property type="protein sequence ID" value="TraesARI2B03G00900180.1.CDS1"/>
    <property type="gene ID" value="TraesARI2B03G00900180"/>
</dbReference>
<dbReference type="EnsemblPlants" id="TraesARI2B03G00974780.1">
    <property type="protein sequence ID" value="TraesARI2B03G00974780.1.CDS1"/>
    <property type="gene ID" value="TraesARI2B03G00974780"/>
</dbReference>
<dbReference type="EnsemblPlants" id="TraesARI2D03G01218440.1">
    <property type="protein sequence ID" value="TraesARI2D03G01218440.1.CDS1"/>
    <property type="gene ID" value="TraesARI2D03G01218440"/>
</dbReference>
<dbReference type="EnsemblPlants" id="TraesARI3A03G01376300.1">
    <property type="protein sequence ID" value="TraesARI3A03G01376300.1.CDS1"/>
    <property type="gene ID" value="TraesARI3A03G01376300"/>
</dbReference>
<dbReference type="EnsemblPlants" id="TraesARI3A03G01490140.1">
    <property type="protein sequence ID" value="TraesARI3A03G01490140.1.CDS1"/>
    <property type="gene ID" value="TraesARI3A03G01490140"/>
</dbReference>
<dbReference type="EnsemblPlants" id="TraesARI3B03G01623270.1">
    <property type="protein sequence ID" value="TraesARI3B03G01623270.1.CDS1"/>
    <property type="gene ID" value="TraesARI3B03G01623270"/>
</dbReference>
<dbReference type="EnsemblPlants" id="TraesARI3B03G01705260.1">
    <property type="protein sequence ID" value="TraesARI3B03G01705260.1.CDS1"/>
    <property type="gene ID" value="TraesARI3B03G01705260"/>
</dbReference>
<dbReference type="EnsemblPlants" id="TraesARI3D03G01878370.1">
    <property type="protein sequence ID" value="TraesARI3D03G01878370.1.CDS1"/>
    <property type="gene ID" value="TraesARI3D03G01878370"/>
</dbReference>
<dbReference type="EnsemblPlants" id="TraesARI3D03G01977060.1">
    <property type="protein sequence ID" value="TraesARI3D03G01977060.1.CDS1"/>
    <property type="gene ID" value="TraesARI3D03G01977060"/>
</dbReference>
<dbReference type="EnsemblPlants" id="TraesARI4A03G02049300.1">
    <property type="protein sequence ID" value="TraesARI4A03G02049300.1.CDS1"/>
    <property type="gene ID" value="TraesARI4A03G02049300"/>
</dbReference>
<dbReference type="EnsemblPlants" id="TraesARI4A03G02058580.1">
    <property type="protein sequence ID" value="TraesARI4A03G02058580.1.CDS1"/>
    <property type="gene ID" value="TraesARI4A03G02058580"/>
</dbReference>
<dbReference type="EnsemblPlants" id="TraesARI4A03G02215230.1">
    <property type="protein sequence ID" value="TraesARI4A03G02215230.1.CDS1"/>
    <property type="gene ID" value="TraesARI4A03G02215230"/>
</dbReference>
<dbReference type="EnsemblPlants" id="TraesARI4A03G02215230.2">
    <property type="protein sequence ID" value="TraesARI4A03G02215230.2.CDS1"/>
    <property type="gene ID" value="TraesARI4A03G02215230"/>
</dbReference>
<dbReference type="EnsemblPlants" id="TraesARI4A03G02215280.1">
    <property type="protein sequence ID" value="TraesARI4A03G02215280.1.CDS1"/>
    <property type="gene ID" value="TraesARI4A03G02215280"/>
</dbReference>
<dbReference type="EnsemblPlants" id="TraesARI4B03G02403600.1">
    <property type="protein sequence ID" value="TraesARI4B03G02403600.1.CDS1"/>
    <property type="gene ID" value="TraesARI4B03G02403600"/>
</dbReference>
<dbReference type="EnsemblPlants" id="TraesARI4D03G02565220.1">
    <property type="protein sequence ID" value="TraesARI4D03G02565220.1.CDS1"/>
    <property type="gene ID" value="TraesARI4D03G02565220"/>
</dbReference>
<dbReference type="EnsemblPlants" id="TraesARI4D03G02575040.1">
    <property type="protein sequence ID" value="TraesARI4D03G02575040.1.CDS1"/>
    <property type="gene ID" value="TraesARI4D03G02575040"/>
</dbReference>
<dbReference type="EnsemblPlants" id="TraesARI5B03G02970110.1">
    <property type="protein sequence ID" value="TraesARI5B03G02970110.1.CDS1"/>
    <property type="gene ID" value="TraesARI5B03G02970110"/>
</dbReference>
<dbReference type="EnsemblPlants" id="TraesARI5B03G02970190.1">
    <property type="protein sequence ID" value="TraesARI5B03G02970190.1.CDS1"/>
    <property type="gene ID" value="TraesARI5B03G02970190"/>
</dbReference>
<dbReference type="EnsemblPlants" id="TraesARI5B03G02970220.1">
    <property type="protein sequence ID" value="TraesARI5B03G02970220.1.CDS1"/>
    <property type="gene ID" value="TraesARI5B03G02970220"/>
</dbReference>
<dbReference type="EnsemblPlants" id="TraesARI5B03G02970360.1">
    <property type="protein sequence ID" value="TraesARI5B03G02970360.1.CDS1"/>
    <property type="gene ID" value="TraesARI5B03G02970360"/>
</dbReference>
<dbReference type="EnsemblPlants" id="TraesARI5B03G02970780.1">
    <property type="protein sequence ID" value="TraesARI5B03G02970780.1.CDS1"/>
    <property type="gene ID" value="TraesARI5B03G02970780"/>
</dbReference>
<dbReference type="EnsemblPlants" id="TraesARI5D03G03066340.1">
    <property type="protein sequence ID" value="TraesARI5D03G03066340.1.CDS1"/>
    <property type="gene ID" value="TraesARI5D03G03066340"/>
</dbReference>
<dbReference type="EnsemblPlants" id="TraesARI6A03G03209470.1">
    <property type="protein sequence ID" value="TraesARI6A03G03209470.1.CDS1"/>
    <property type="gene ID" value="TraesARI6A03G03209470"/>
</dbReference>
<dbReference type="EnsemblPlants" id="TraesARI6A03G03210000.1">
    <property type="protein sequence ID" value="TraesARI6A03G03210000.1.CDS1"/>
    <property type="gene ID" value="TraesARI6A03G03210000"/>
</dbReference>
<dbReference type="EnsemblPlants" id="TraesARI6A03G03223440.1">
    <property type="protein sequence ID" value="TraesARI6A03G03223440.1.CDS1"/>
    <property type="gene ID" value="TraesARI6A03G03223440"/>
</dbReference>
<dbReference type="EnsemblPlants" id="TraesARI6A03G03248190.1">
    <property type="protein sequence ID" value="TraesARI6A03G03248190.1.CDS1"/>
    <property type="gene ID" value="TraesARI6A03G03248190"/>
</dbReference>
<dbReference type="EnsemblPlants" id="TraesARI6B03G03405030.1">
    <property type="protein sequence ID" value="TraesARI6B03G03405030.1.CDS1"/>
    <property type="gene ID" value="TraesARI6B03G03405030"/>
</dbReference>
<dbReference type="EnsemblPlants" id="TraesARI6B03G03405270.1">
    <property type="protein sequence ID" value="TraesARI6B03G03405270.1.CDS1"/>
    <property type="gene ID" value="TraesARI6B03G03405270"/>
</dbReference>
<dbReference type="EnsemblPlants" id="TraesARI6B03G03406180.1">
    <property type="protein sequence ID" value="TraesARI6B03G03406180.1.CDS1"/>
    <property type="gene ID" value="TraesARI6B03G03406180"/>
</dbReference>
<dbReference type="EnsemblPlants" id="TraesARI6D03G03626610.1">
    <property type="protein sequence ID" value="TraesARI6D03G03626610.1.CDS1"/>
    <property type="gene ID" value="TraesARI6D03G03626610"/>
</dbReference>
<dbReference type="EnsemblPlants" id="TraesARI6D03G03627060.1">
    <property type="protein sequence ID" value="TraesARI6D03G03627060.1.CDS1"/>
    <property type="gene ID" value="TraesARI6D03G03627060"/>
</dbReference>
<dbReference type="EnsemblPlants" id="TraesARI6D03G03634630.1">
    <property type="protein sequence ID" value="TraesARI6D03G03634630.1.CDS1"/>
    <property type="gene ID" value="TraesARI6D03G03634630"/>
</dbReference>
<dbReference type="EnsemblPlants" id="TraesARI6D03G03656920.1">
    <property type="protein sequence ID" value="TraesARI6D03G03656920.1.CDS1"/>
    <property type="gene ID" value="TraesARI6D03G03656920"/>
</dbReference>
<dbReference type="EnsemblPlants" id="TraesARI7A03G03803220.1">
    <property type="protein sequence ID" value="TraesARI7A03G03803220.1.CDS1"/>
    <property type="gene ID" value="TraesARI7A03G03803220"/>
</dbReference>
<dbReference type="EnsemblPlants" id="TraesARI7A03G03803220.2">
    <property type="protein sequence ID" value="TraesARI7A03G03803220.2.CDS1"/>
    <property type="gene ID" value="TraesARI7A03G03803220"/>
</dbReference>
<dbReference type="EnsemblPlants" id="TraesARI7A03G03803490.1">
    <property type="protein sequence ID" value="TraesARI7A03G03803490.1.CDS1"/>
    <property type="gene ID" value="TraesARI7A03G03803490"/>
</dbReference>
<dbReference type="EnsemblPlants" id="TraesARI7A03G03809470.1">
    <property type="protein sequence ID" value="TraesARI7A03G03809470.1.CDS1"/>
    <property type="gene ID" value="TraesARI7A03G03809470"/>
</dbReference>
<dbReference type="EnsemblPlants" id="TraesARI7A03G03809670.1">
    <property type="protein sequence ID" value="TraesARI7A03G03809670.1.CDS1"/>
    <property type="gene ID" value="TraesARI7A03G03809670"/>
</dbReference>
<dbReference type="EnsemblPlants" id="TraesARI7A03G03809750.1">
    <property type="protein sequence ID" value="TraesARI7A03G03809750.1.CDS1"/>
    <property type="gene ID" value="TraesARI7A03G03809750"/>
</dbReference>
<dbReference type="EnsemblPlants" id="TraesARI7A03G03809800.1">
    <property type="protein sequence ID" value="TraesARI7A03G03809800.1.CDS1"/>
    <property type="gene ID" value="TraesARI7A03G03809800"/>
</dbReference>
<dbReference type="EnsemblPlants" id="TraesARI7B03G04203700.1">
    <property type="protein sequence ID" value="TraesARI7B03G04203700.1.CDS1"/>
    <property type="gene ID" value="TraesARI7B03G04203700"/>
</dbReference>
<dbReference type="EnsemblPlants" id="TraesARI7D03G04378570.1">
    <property type="protein sequence ID" value="TraesARI7D03G04378570.1.CDS1"/>
    <property type="gene ID" value="TraesARI7D03G04378570"/>
</dbReference>
<dbReference type="EnsemblPlants" id="TraesARI7D03G04378700.1">
    <property type="protein sequence ID" value="TraesARI7D03G04378700.1.CDS1"/>
    <property type="gene ID" value="TraesARI7D03G04378700"/>
</dbReference>
<dbReference type="EnsemblPlants" id="TraesARI7D03G04384590.1">
    <property type="protein sequence ID" value="TraesARI7D03G04384590.1.CDS1"/>
    <property type="gene ID" value="TraesARI7D03G04384590"/>
</dbReference>
<dbReference type="EnsemblPlants" id="TraesARI7D03G04384920.1">
    <property type="protein sequence ID" value="TraesARI7D03G04384920.1.CDS1"/>
    <property type="gene ID" value="TraesARI7D03G04384920"/>
</dbReference>
<dbReference type="EnsemblPlants" id="TraesARI7D03G04384950.1">
    <property type="protein sequence ID" value="TraesARI7D03G04384950.1.CDS1"/>
    <property type="gene ID" value="TraesARI7D03G04384950"/>
</dbReference>
<dbReference type="EnsemblPlants" id="TraesARI7D03G04394050.1">
    <property type="protein sequence ID" value="TraesARI7D03G04394050.1.CDS1"/>
    <property type="gene ID" value="TraesARI7D03G04394050"/>
</dbReference>
<dbReference type="EnsemblPlants" id="TraesARIUn03G04578780.1">
    <property type="protein sequence ID" value="TraesARIUn03G04578780.1.CDS1"/>
    <property type="gene ID" value="TraesARIUn03G04578780"/>
</dbReference>
<dbReference type="EnsemblPlants" id="TraesARIUn03G04579330.1">
    <property type="protein sequence ID" value="TraesARIUn03G04579330.1.CDS1"/>
    <property type="gene ID" value="TraesARIUn03G04579330"/>
</dbReference>
<dbReference type="EnsemblPlants" id="TraesARIUn03G04677270.1">
    <property type="protein sequence ID" value="TraesARIUn03G04677270.1.CDS1"/>
    <property type="gene ID" value="TraesARIUn03G04677270"/>
</dbReference>
<dbReference type="EnsemblPlants" id="TraesCAD_scaffold_001025_01G000300.1">
    <property type="protein sequence ID" value="TraesCAD_scaffold_001025_01G000300.1"/>
    <property type="gene ID" value="TraesCAD_scaffold_001025_01G000300"/>
</dbReference>
<dbReference type="EnsemblPlants" id="TraesCAD_scaffold_002549_01G000300.1">
    <property type="protein sequence ID" value="TraesCAD_scaffold_002549_01G000300.1"/>
    <property type="gene ID" value="TraesCAD_scaffold_002549_01G000300"/>
</dbReference>
<dbReference type="EnsemblPlants" id="TraesCAD_scaffold_002549_01G000400.1">
    <property type="protein sequence ID" value="TraesCAD_scaffold_002549_01G000400.1"/>
    <property type="gene ID" value="TraesCAD_scaffold_002549_01G000400"/>
</dbReference>
<dbReference type="EnsemblPlants" id="TraesCAD_scaffold_002549_01G000600.1">
    <property type="protein sequence ID" value="TraesCAD_scaffold_002549_01G000600.1"/>
    <property type="gene ID" value="TraesCAD_scaffold_002549_01G000600"/>
</dbReference>
<dbReference type="EnsemblPlants" id="TraesCAD_scaffold_005927_01G000200.1">
    <property type="protein sequence ID" value="TraesCAD_scaffold_005927_01G000200.1"/>
    <property type="gene ID" value="TraesCAD_scaffold_005927_01G000200"/>
</dbReference>
<dbReference type="EnsemblPlants" id="TraesCAD_scaffold_008927_01G000100.1">
    <property type="protein sequence ID" value="TraesCAD_scaffold_008927_01G000100.1"/>
    <property type="gene ID" value="TraesCAD_scaffold_008927_01G000100"/>
</dbReference>
<dbReference type="EnsemblPlants" id="TraesCAD_scaffold_009704_01G000400.1">
    <property type="protein sequence ID" value="TraesCAD_scaffold_009704_01G000400.1"/>
    <property type="gene ID" value="TraesCAD_scaffold_009704_01G000400"/>
</dbReference>
<dbReference type="EnsemblPlants" id="TraesCAD_scaffold_010565_01G000100.1">
    <property type="protein sequence ID" value="TraesCAD_scaffold_010565_01G000100.1"/>
    <property type="gene ID" value="TraesCAD_scaffold_010565_01G000100"/>
</dbReference>
<dbReference type="EnsemblPlants" id="TraesCAD_scaffold_010565_01G000300.1">
    <property type="protein sequence ID" value="TraesCAD_scaffold_010565_01G000300.1"/>
    <property type="gene ID" value="TraesCAD_scaffold_010565_01G000300"/>
</dbReference>
<dbReference type="EnsemblPlants" id="TraesCAD_scaffold_010565_01G000800.1">
    <property type="protein sequence ID" value="TraesCAD_scaffold_010565_01G000800.1"/>
    <property type="gene ID" value="TraesCAD_scaffold_010565_01G000800"/>
</dbReference>
<dbReference type="EnsemblPlants" id="TraesCAD_scaffold_011347_01G000100.1">
    <property type="protein sequence ID" value="TraesCAD_scaffold_011347_01G000100.1"/>
    <property type="gene ID" value="TraesCAD_scaffold_011347_01G000100"/>
</dbReference>
<dbReference type="EnsemblPlants" id="TraesCAD_scaffold_011504_01G000700.1">
    <property type="protein sequence ID" value="TraesCAD_scaffold_011504_01G000700.1"/>
    <property type="gene ID" value="TraesCAD_scaffold_011504_01G000700"/>
</dbReference>
<dbReference type="EnsemblPlants" id="TraesCAD_scaffold_013930_01G000100.1">
    <property type="protein sequence ID" value="TraesCAD_scaffold_013930_01G000100.1"/>
    <property type="gene ID" value="TraesCAD_scaffold_013930_01G000100"/>
</dbReference>
<dbReference type="EnsemblPlants" id="TraesCAD_scaffold_014376_01G000100.1">
    <property type="protein sequence ID" value="TraesCAD_scaffold_014376_01G000100.1"/>
    <property type="gene ID" value="TraesCAD_scaffold_014376_01G000100"/>
</dbReference>
<dbReference type="EnsemblPlants" id="TraesCAD_scaffold_014839_01G000100.1">
    <property type="protein sequence ID" value="TraesCAD_scaffold_014839_01G000100.1"/>
    <property type="gene ID" value="TraesCAD_scaffold_014839_01G000100"/>
</dbReference>
<dbReference type="EnsemblPlants" id="TraesCAD_scaffold_015649_01G000400.1">
    <property type="protein sequence ID" value="TraesCAD_scaffold_015649_01G000400.1"/>
    <property type="gene ID" value="TraesCAD_scaffold_015649_01G000400"/>
</dbReference>
<dbReference type="EnsemblPlants" id="TraesCAD_scaffold_016721_01G000300.1">
    <property type="protein sequence ID" value="TraesCAD_scaffold_016721_01G000300.1"/>
    <property type="gene ID" value="TraesCAD_scaffold_016721_01G000300"/>
</dbReference>
<dbReference type="EnsemblPlants" id="TraesCAD_scaffold_019539_01G000100.1">
    <property type="protein sequence ID" value="TraesCAD_scaffold_019539_01G000100.1"/>
    <property type="gene ID" value="TraesCAD_scaffold_019539_01G000100"/>
</dbReference>
<dbReference type="EnsemblPlants" id="TraesCAD_scaffold_021360_01G000400.1">
    <property type="protein sequence ID" value="TraesCAD_scaffold_021360_01G000400.1"/>
    <property type="gene ID" value="TraesCAD_scaffold_021360_01G000400"/>
</dbReference>
<dbReference type="EnsemblPlants" id="TraesCAD_scaffold_021489_01G000100.1">
    <property type="protein sequence ID" value="TraesCAD_scaffold_021489_01G000100.1"/>
    <property type="gene ID" value="TraesCAD_scaffold_021489_01G000100"/>
</dbReference>
<dbReference type="EnsemblPlants" id="TraesCAD_scaffold_021743_01G000500.1">
    <property type="protein sequence ID" value="TraesCAD_scaffold_021743_01G000500.1"/>
    <property type="gene ID" value="TraesCAD_scaffold_021743_01G000500"/>
</dbReference>
<dbReference type="EnsemblPlants" id="TraesCAD_scaffold_022925_01G000100.1">
    <property type="protein sequence ID" value="TraesCAD_scaffold_022925_01G000100.1"/>
    <property type="gene ID" value="TraesCAD_scaffold_022925_01G000100"/>
</dbReference>
<dbReference type="EnsemblPlants" id="TraesCAD_scaffold_025516_01G000100.1">
    <property type="protein sequence ID" value="TraesCAD_scaffold_025516_01G000100.1"/>
    <property type="gene ID" value="TraesCAD_scaffold_025516_01G000100"/>
</dbReference>
<dbReference type="EnsemblPlants" id="TraesCAD_scaffold_026713_01G000100.1">
    <property type="protein sequence ID" value="TraesCAD_scaffold_026713_01G000100.1"/>
    <property type="gene ID" value="TraesCAD_scaffold_026713_01G000100"/>
</dbReference>
<dbReference type="EnsemblPlants" id="TraesCAD_scaffold_026713_01G000300.1">
    <property type="protein sequence ID" value="TraesCAD_scaffold_026713_01G000300.1"/>
    <property type="gene ID" value="TraesCAD_scaffold_026713_01G000300"/>
</dbReference>
<dbReference type="EnsemblPlants" id="TraesCAD_scaffold_028116_01G000700.1">
    <property type="protein sequence ID" value="TraesCAD_scaffold_028116_01G000700.1"/>
    <property type="gene ID" value="TraesCAD_scaffold_028116_01G000700"/>
</dbReference>
<dbReference type="EnsemblPlants" id="TraesCAD_scaffold_030272_01G000300.1">
    <property type="protein sequence ID" value="TraesCAD_scaffold_030272_01G000300.1"/>
    <property type="gene ID" value="TraesCAD_scaffold_030272_01G000300"/>
</dbReference>
<dbReference type="EnsemblPlants" id="TraesCAD_scaffold_030701_01G000100.1">
    <property type="protein sequence ID" value="TraesCAD_scaffold_030701_01G000100.1"/>
    <property type="gene ID" value="TraesCAD_scaffold_030701_01G000100"/>
</dbReference>
<dbReference type="EnsemblPlants" id="TraesCAD_scaffold_031902_01G000200.1">
    <property type="protein sequence ID" value="TraesCAD_scaffold_031902_01G000200.1"/>
    <property type="gene ID" value="TraesCAD_scaffold_031902_01G000200"/>
</dbReference>
<dbReference type="EnsemblPlants" id="TraesCAD_scaffold_031902_01G000400.1">
    <property type="protein sequence ID" value="TraesCAD_scaffold_031902_01G000400.1"/>
    <property type="gene ID" value="TraesCAD_scaffold_031902_01G000400"/>
</dbReference>
<dbReference type="EnsemblPlants" id="TraesCAD_scaffold_035590_01G000100.1">
    <property type="protein sequence ID" value="TraesCAD_scaffold_035590_01G000100.1"/>
    <property type="gene ID" value="TraesCAD_scaffold_035590_01G000100"/>
</dbReference>
<dbReference type="EnsemblPlants" id="TraesCAD_scaffold_039512_01G000500.1">
    <property type="protein sequence ID" value="TraesCAD_scaffold_039512_01G000500.1"/>
    <property type="gene ID" value="TraesCAD_scaffold_039512_01G000500"/>
</dbReference>
<dbReference type="EnsemblPlants" id="TraesCAD_scaffold_040244_01G000200.1">
    <property type="protein sequence ID" value="TraesCAD_scaffold_040244_01G000200.1"/>
    <property type="gene ID" value="TraesCAD_scaffold_040244_01G000200"/>
</dbReference>
<dbReference type="EnsemblPlants" id="TraesCAD_scaffold_042577_01G000200.1">
    <property type="protein sequence ID" value="TraesCAD_scaffold_042577_01G000200.1"/>
    <property type="gene ID" value="TraesCAD_scaffold_042577_01G000200"/>
</dbReference>
<dbReference type="EnsemblPlants" id="TraesCAD_scaffold_044367_01G000200.1">
    <property type="protein sequence ID" value="TraesCAD_scaffold_044367_01G000200.1"/>
    <property type="gene ID" value="TraesCAD_scaffold_044367_01G000200"/>
</dbReference>
<dbReference type="EnsemblPlants" id="TraesCAD_scaffold_044661_01G000400.1">
    <property type="protein sequence ID" value="TraesCAD_scaffold_044661_01G000400.1"/>
    <property type="gene ID" value="TraesCAD_scaffold_044661_01G000400"/>
</dbReference>
<dbReference type="EnsemblPlants" id="TraesCAD_scaffold_045746_01G000100.1">
    <property type="protein sequence ID" value="TraesCAD_scaffold_045746_01G000100.1"/>
    <property type="gene ID" value="TraesCAD_scaffold_045746_01G000100"/>
</dbReference>
<dbReference type="EnsemblPlants" id="TraesCAD_scaffold_046126_01G000200.1">
    <property type="protein sequence ID" value="TraesCAD_scaffold_046126_01G000200.1"/>
    <property type="gene ID" value="TraesCAD_scaffold_046126_01G000200"/>
</dbReference>
<dbReference type="EnsemblPlants" id="TraesCAD_scaffold_049454_01G000200.1">
    <property type="protein sequence ID" value="TraesCAD_scaffold_049454_01G000200.1"/>
    <property type="gene ID" value="TraesCAD_scaffold_049454_01G000200"/>
</dbReference>
<dbReference type="EnsemblPlants" id="TraesCAD_scaffold_053170_01G000400.1">
    <property type="protein sequence ID" value="TraesCAD_scaffold_053170_01G000400.1"/>
    <property type="gene ID" value="TraesCAD_scaffold_053170_01G000400"/>
</dbReference>
<dbReference type="EnsemblPlants" id="TraesCAD_scaffold_057498_01G000900.1">
    <property type="protein sequence ID" value="TraesCAD_scaffold_057498_01G000900.1"/>
    <property type="gene ID" value="TraesCAD_scaffold_057498_01G000900"/>
</dbReference>
<dbReference type="EnsemblPlants" id="TraesCAD_scaffold_057498_01G001000.1">
    <property type="protein sequence ID" value="TraesCAD_scaffold_057498_01G001000.1"/>
    <property type="gene ID" value="TraesCAD_scaffold_057498_01G001000"/>
</dbReference>
<dbReference type="EnsemblPlants" id="TraesCAD_scaffold_058042_01G000100.1">
    <property type="protein sequence ID" value="TraesCAD_scaffold_058042_01G000100.1"/>
    <property type="gene ID" value="TraesCAD_scaffold_058042_01G000100"/>
</dbReference>
<dbReference type="EnsemblPlants" id="TraesCAD_scaffold_064560_01G000100.1">
    <property type="protein sequence ID" value="TraesCAD_scaffold_064560_01G000100.1"/>
    <property type="gene ID" value="TraesCAD_scaffold_064560_01G000100"/>
</dbReference>
<dbReference type="EnsemblPlants" id="TraesCAD_scaffold_065917_01G000300.1">
    <property type="protein sequence ID" value="TraesCAD_scaffold_065917_01G000300.1"/>
    <property type="gene ID" value="TraesCAD_scaffold_065917_01G000300"/>
</dbReference>
<dbReference type="EnsemblPlants" id="TraesCAD_scaffold_066405_01G000100.1">
    <property type="protein sequence ID" value="TraesCAD_scaffold_066405_01G000100.1"/>
    <property type="gene ID" value="TraesCAD_scaffold_066405_01G000100"/>
</dbReference>
<dbReference type="EnsemblPlants" id="TraesCAD_scaffold_067137_01G000300.1">
    <property type="protein sequence ID" value="TraesCAD_scaffold_067137_01G000300.1"/>
    <property type="gene ID" value="TraesCAD_scaffold_067137_01G000300"/>
</dbReference>
<dbReference type="EnsemblPlants" id="TraesCAD_scaffold_071601_01G000200.1">
    <property type="protein sequence ID" value="TraesCAD_scaffold_071601_01G000200.1"/>
    <property type="gene ID" value="TraesCAD_scaffold_071601_01G000200"/>
</dbReference>
<dbReference type="EnsemblPlants" id="TraesCAD_scaffold_072141_01G000100.1">
    <property type="protein sequence ID" value="TraesCAD_scaffold_072141_01G000100.1"/>
    <property type="gene ID" value="TraesCAD_scaffold_072141_01G000100"/>
</dbReference>
<dbReference type="EnsemblPlants" id="TraesCAD_scaffold_073280_01G000300.1">
    <property type="protein sequence ID" value="TraesCAD_scaffold_073280_01G000300.1"/>
    <property type="gene ID" value="TraesCAD_scaffold_073280_01G000300"/>
</dbReference>
<dbReference type="EnsemblPlants" id="TraesCAD_scaffold_075736_01G000100.1">
    <property type="protein sequence ID" value="TraesCAD_scaffold_075736_01G000100.1"/>
    <property type="gene ID" value="TraesCAD_scaffold_075736_01G000100"/>
</dbReference>
<dbReference type="EnsemblPlants" id="TraesCAD_scaffold_077570_01G000100.1">
    <property type="protein sequence ID" value="TraesCAD_scaffold_077570_01G000100.1"/>
    <property type="gene ID" value="TraesCAD_scaffold_077570_01G000100"/>
</dbReference>
<dbReference type="EnsemblPlants" id="TraesCAD_scaffold_081807_01G000300.1">
    <property type="protein sequence ID" value="TraesCAD_scaffold_081807_01G000300.1"/>
    <property type="gene ID" value="TraesCAD_scaffold_081807_01G000300"/>
</dbReference>
<dbReference type="EnsemblPlants" id="TraesCAD_scaffold_084462_01G000200.1">
    <property type="protein sequence ID" value="TraesCAD_scaffold_084462_01G000200.1"/>
    <property type="gene ID" value="TraesCAD_scaffold_084462_01G000200"/>
</dbReference>
<dbReference type="EnsemblPlants" id="TraesCAD_scaffold_088168_01G000100.1">
    <property type="protein sequence ID" value="TraesCAD_scaffold_088168_01G000100.1"/>
    <property type="gene ID" value="TraesCAD_scaffold_088168_01G000100"/>
</dbReference>
<dbReference type="EnsemblPlants" id="TraesCAD_scaffold_099250_01G000100.1">
    <property type="protein sequence ID" value="TraesCAD_scaffold_099250_01G000100.1"/>
    <property type="gene ID" value="TraesCAD_scaffold_099250_01G000100"/>
</dbReference>
<dbReference type="EnsemblPlants" id="TraesCAD_scaffold_100956_01G000500.1">
    <property type="protein sequence ID" value="TraesCAD_scaffold_100956_01G000500.1"/>
    <property type="gene ID" value="TraesCAD_scaffold_100956_01G000500"/>
</dbReference>
<dbReference type="EnsemblPlants" id="TraesCAD_scaffold_103447_01G000100.1">
    <property type="protein sequence ID" value="TraesCAD_scaffold_103447_01G000100.1"/>
    <property type="gene ID" value="TraesCAD_scaffold_103447_01G000100"/>
</dbReference>
<dbReference type="EnsemblPlants" id="TraesCAD_scaffold_103872_01G000100.1">
    <property type="protein sequence ID" value="TraesCAD_scaffold_103872_01G000100.1"/>
    <property type="gene ID" value="TraesCAD_scaffold_103872_01G000100"/>
</dbReference>
<dbReference type="EnsemblPlants" id="TraesCAD_scaffold_108730_01G000200.1">
    <property type="protein sequence ID" value="TraesCAD_scaffold_108730_01G000200.1"/>
    <property type="gene ID" value="TraesCAD_scaffold_108730_01G000200"/>
</dbReference>
<dbReference type="EnsemblPlants" id="TraesCAD_scaffold_111688_01G000100.1">
    <property type="protein sequence ID" value="TraesCAD_scaffold_111688_01G000100.1"/>
    <property type="gene ID" value="TraesCAD_scaffold_111688_01G000100"/>
</dbReference>
<dbReference type="EnsemblPlants" id="TraesCAD_scaffold_116866_01G000100.1">
    <property type="protein sequence ID" value="TraesCAD_scaffold_116866_01G000100.1"/>
    <property type="gene ID" value="TraesCAD_scaffold_116866_01G000100"/>
</dbReference>
<dbReference type="EnsemblPlants" id="TraesCAD_scaffold_126079_01G000200.1">
    <property type="protein sequence ID" value="TraesCAD_scaffold_126079_01G000200.1"/>
    <property type="gene ID" value="TraesCAD_scaffold_126079_01G000200"/>
</dbReference>
<dbReference type="EnsemblPlants" id="TraesCAD_scaffold_132006_01G000300.1">
    <property type="protein sequence ID" value="TraesCAD_scaffold_132006_01G000300.1"/>
    <property type="gene ID" value="TraesCAD_scaffold_132006_01G000300"/>
</dbReference>
<dbReference type="EnsemblPlants" id="TraesCAD_scaffold_163106_01G000100.1">
    <property type="protein sequence ID" value="TraesCAD_scaffold_163106_01G000100.1"/>
    <property type="gene ID" value="TraesCAD_scaffold_163106_01G000100"/>
</dbReference>
<dbReference type="EnsemblPlants" id="TraesCLE_scaffold_002827_01G000200.1">
    <property type="protein sequence ID" value="TraesCLE_scaffold_002827_01G000200.1"/>
    <property type="gene ID" value="TraesCLE_scaffold_002827_01G000200"/>
</dbReference>
<dbReference type="EnsemblPlants" id="TraesCLE_scaffold_007908_01G000200.1">
    <property type="protein sequence ID" value="TraesCLE_scaffold_007908_01G000200.1"/>
    <property type="gene ID" value="TraesCLE_scaffold_007908_01G000200"/>
</dbReference>
<dbReference type="EnsemblPlants" id="TraesCLE_scaffold_008175_01G000100.1">
    <property type="protein sequence ID" value="TraesCLE_scaffold_008175_01G000100.1"/>
    <property type="gene ID" value="TraesCLE_scaffold_008175_01G000100"/>
</dbReference>
<dbReference type="EnsemblPlants" id="TraesCLE_scaffold_008175_01G000200.1">
    <property type="protein sequence ID" value="TraesCLE_scaffold_008175_01G000200.1"/>
    <property type="gene ID" value="TraesCLE_scaffold_008175_01G000200"/>
</dbReference>
<dbReference type="EnsemblPlants" id="TraesCLE_scaffold_008711_01G000200.1">
    <property type="protein sequence ID" value="TraesCLE_scaffold_008711_01G000200.1"/>
    <property type="gene ID" value="TraesCLE_scaffold_008711_01G000200"/>
</dbReference>
<dbReference type="EnsemblPlants" id="TraesCLE_scaffold_010450_01G000700.1">
    <property type="protein sequence ID" value="TraesCLE_scaffold_010450_01G000700.1"/>
    <property type="gene ID" value="TraesCLE_scaffold_010450_01G000700"/>
</dbReference>
<dbReference type="EnsemblPlants" id="TraesCLE_scaffold_010583_01G000100.1">
    <property type="protein sequence ID" value="TraesCLE_scaffold_010583_01G000100.1"/>
    <property type="gene ID" value="TraesCLE_scaffold_010583_01G000100"/>
</dbReference>
<dbReference type="EnsemblPlants" id="TraesCLE_scaffold_010671_01G000200.1">
    <property type="protein sequence ID" value="TraesCLE_scaffold_010671_01G000200.1"/>
    <property type="gene ID" value="TraesCLE_scaffold_010671_01G000200"/>
</dbReference>
<dbReference type="EnsemblPlants" id="TraesCLE_scaffold_010671_01G000400.1">
    <property type="protein sequence ID" value="TraesCLE_scaffold_010671_01G000400.1"/>
    <property type="gene ID" value="TraesCLE_scaffold_010671_01G000400"/>
</dbReference>
<dbReference type="EnsemblPlants" id="TraesCLE_scaffold_010918_01G000900.1">
    <property type="protein sequence ID" value="TraesCLE_scaffold_010918_01G000900.1"/>
    <property type="gene ID" value="TraesCLE_scaffold_010918_01G000900"/>
</dbReference>
<dbReference type="EnsemblPlants" id="TraesCLE_scaffold_010918_01G001400.1">
    <property type="protein sequence ID" value="TraesCLE_scaffold_010918_01G001400.1"/>
    <property type="gene ID" value="TraesCLE_scaffold_010918_01G001400"/>
</dbReference>
<dbReference type="EnsemblPlants" id="TraesCLE_scaffold_011201_01G000100.1">
    <property type="protein sequence ID" value="TraesCLE_scaffold_011201_01G000100.1"/>
    <property type="gene ID" value="TraesCLE_scaffold_011201_01G000100"/>
</dbReference>
<dbReference type="EnsemblPlants" id="TraesCLE_scaffold_014717_01G000100.1">
    <property type="protein sequence ID" value="TraesCLE_scaffold_014717_01G000100.1"/>
    <property type="gene ID" value="TraesCLE_scaffold_014717_01G000100"/>
</dbReference>
<dbReference type="EnsemblPlants" id="TraesCLE_scaffold_015525_01G000500.1">
    <property type="protein sequence ID" value="TraesCLE_scaffold_015525_01G000500.1"/>
    <property type="gene ID" value="TraesCLE_scaffold_015525_01G000500"/>
</dbReference>
<dbReference type="EnsemblPlants" id="TraesCLE_scaffold_016509_01G000500.1">
    <property type="protein sequence ID" value="TraesCLE_scaffold_016509_01G000500.1"/>
    <property type="gene ID" value="TraesCLE_scaffold_016509_01G000500"/>
</dbReference>
<dbReference type="EnsemblPlants" id="TraesCLE_scaffold_019691_01G000300.1">
    <property type="protein sequence ID" value="TraesCLE_scaffold_019691_01G000300.1"/>
    <property type="gene ID" value="TraesCLE_scaffold_019691_01G000300"/>
</dbReference>
<dbReference type="EnsemblPlants" id="TraesCLE_scaffold_021386_01G000100.1">
    <property type="protein sequence ID" value="TraesCLE_scaffold_021386_01G000100.1"/>
    <property type="gene ID" value="TraesCLE_scaffold_021386_01G000100"/>
</dbReference>
<dbReference type="EnsemblPlants" id="TraesCLE_scaffold_028120_01G000200.1">
    <property type="protein sequence ID" value="TraesCLE_scaffold_028120_01G000200.1"/>
    <property type="gene ID" value="TraesCLE_scaffold_028120_01G000200"/>
</dbReference>
<dbReference type="EnsemblPlants" id="TraesCLE_scaffold_033029_01G000200.1">
    <property type="protein sequence ID" value="TraesCLE_scaffold_033029_01G000200.1"/>
    <property type="gene ID" value="TraesCLE_scaffold_033029_01G000200"/>
</dbReference>
<dbReference type="EnsemblPlants" id="TraesCLE_scaffold_034092_01G000200.1">
    <property type="protein sequence ID" value="TraesCLE_scaffold_034092_01G000200.1"/>
    <property type="gene ID" value="TraesCLE_scaffold_034092_01G000200"/>
</dbReference>
<dbReference type="EnsemblPlants" id="TraesCLE_scaffold_034489_01G000200.1">
    <property type="protein sequence ID" value="TraesCLE_scaffold_034489_01G000200.1"/>
    <property type="gene ID" value="TraesCLE_scaffold_034489_01G000200"/>
</dbReference>
<dbReference type="EnsemblPlants" id="TraesCLE_scaffold_034727_01G000100.1">
    <property type="protein sequence ID" value="TraesCLE_scaffold_034727_01G000100.1"/>
    <property type="gene ID" value="TraesCLE_scaffold_034727_01G000100"/>
</dbReference>
<dbReference type="EnsemblPlants" id="TraesCLE_scaffold_038040_01G000100.1">
    <property type="protein sequence ID" value="TraesCLE_scaffold_038040_01G000100.1"/>
    <property type="gene ID" value="TraesCLE_scaffold_038040_01G000100"/>
</dbReference>
<dbReference type="EnsemblPlants" id="TraesCLE_scaffold_045698_01G000400.1">
    <property type="protein sequence ID" value="TraesCLE_scaffold_045698_01G000400.1"/>
    <property type="gene ID" value="TraesCLE_scaffold_045698_01G000400"/>
</dbReference>
<dbReference type="EnsemblPlants" id="TraesCLE_scaffold_047276_01G000400.1">
    <property type="protein sequence ID" value="TraesCLE_scaffold_047276_01G000400.1"/>
    <property type="gene ID" value="TraesCLE_scaffold_047276_01G000400"/>
</dbReference>
<dbReference type="EnsemblPlants" id="TraesCLE_scaffold_048960_01G000300.1">
    <property type="protein sequence ID" value="TraesCLE_scaffold_048960_01G000300.1"/>
    <property type="gene ID" value="TraesCLE_scaffold_048960_01G000300"/>
</dbReference>
<dbReference type="EnsemblPlants" id="TraesCLE_scaffold_049505_01G000300.1">
    <property type="protein sequence ID" value="TraesCLE_scaffold_049505_01G000300.1"/>
    <property type="gene ID" value="TraesCLE_scaffold_049505_01G000300"/>
</dbReference>
<dbReference type="EnsemblPlants" id="TraesCLE_scaffold_051652_01G000100.1">
    <property type="protein sequence ID" value="TraesCLE_scaffold_051652_01G000100.1"/>
    <property type="gene ID" value="TraesCLE_scaffold_051652_01G000100"/>
</dbReference>
<dbReference type="EnsemblPlants" id="TraesCLE_scaffold_053744_01G000200.1">
    <property type="protein sequence ID" value="TraesCLE_scaffold_053744_01G000200.1"/>
    <property type="gene ID" value="TraesCLE_scaffold_053744_01G000200"/>
</dbReference>
<dbReference type="EnsemblPlants" id="TraesCLE_scaffold_053928_01G000300.1">
    <property type="protein sequence ID" value="TraesCLE_scaffold_053928_01G000300.1"/>
    <property type="gene ID" value="TraesCLE_scaffold_053928_01G000300"/>
</dbReference>
<dbReference type="EnsemblPlants" id="TraesCLE_scaffold_056606_01G000100.1">
    <property type="protein sequence ID" value="TraesCLE_scaffold_056606_01G000100.1"/>
    <property type="gene ID" value="TraesCLE_scaffold_056606_01G000100"/>
</dbReference>
<dbReference type="EnsemblPlants" id="TraesCLE_scaffold_057935_01G000200.1">
    <property type="protein sequence ID" value="TraesCLE_scaffold_057935_01G000200.1"/>
    <property type="gene ID" value="TraesCLE_scaffold_057935_01G000200"/>
</dbReference>
<dbReference type="EnsemblPlants" id="TraesCLE_scaffold_059342_01G000200.1">
    <property type="protein sequence ID" value="TraesCLE_scaffold_059342_01G000200.1"/>
    <property type="gene ID" value="TraesCLE_scaffold_059342_01G000200"/>
</dbReference>
<dbReference type="EnsemblPlants" id="TraesCLE_scaffold_061335_01G000200.1">
    <property type="protein sequence ID" value="TraesCLE_scaffold_061335_01G000200.1"/>
    <property type="gene ID" value="TraesCLE_scaffold_061335_01G000200"/>
</dbReference>
<dbReference type="EnsemblPlants" id="TraesCLE_scaffold_062064_01G000100.1">
    <property type="protein sequence ID" value="TraesCLE_scaffold_062064_01G000100.1"/>
    <property type="gene ID" value="TraesCLE_scaffold_062064_01G000100"/>
</dbReference>
<dbReference type="EnsemblPlants" id="TraesCLE_scaffold_062064_01G000300.1">
    <property type="protein sequence ID" value="TraesCLE_scaffold_062064_01G000300.1"/>
    <property type="gene ID" value="TraesCLE_scaffold_062064_01G000300"/>
</dbReference>
<dbReference type="EnsemblPlants" id="TraesCLE_scaffold_063806_01G000500.1">
    <property type="protein sequence ID" value="TraesCLE_scaffold_063806_01G000500.1"/>
    <property type="gene ID" value="TraesCLE_scaffold_063806_01G000500"/>
</dbReference>
<dbReference type="EnsemblPlants" id="TraesCLE_scaffold_065545_01G000200.1">
    <property type="protein sequence ID" value="TraesCLE_scaffold_065545_01G000200.1"/>
    <property type="gene ID" value="TraesCLE_scaffold_065545_01G000200"/>
</dbReference>
<dbReference type="EnsemblPlants" id="TraesCLE_scaffold_067323_01G000100.1">
    <property type="protein sequence ID" value="TraesCLE_scaffold_067323_01G000100.1"/>
    <property type="gene ID" value="TraesCLE_scaffold_067323_01G000100"/>
</dbReference>
<dbReference type="EnsemblPlants" id="TraesCLE_scaffold_067953_01G000200.1">
    <property type="protein sequence ID" value="TraesCLE_scaffold_067953_01G000200.1"/>
    <property type="gene ID" value="TraesCLE_scaffold_067953_01G000200"/>
</dbReference>
<dbReference type="EnsemblPlants" id="TraesCLE_scaffold_068651_01G000400.1">
    <property type="protein sequence ID" value="TraesCLE_scaffold_068651_01G000400.1"/>
    <property type="gene ID" value="TraesCLE_scaffold_068651_01G000400"/>
</dbReference>
<dbReference type="EnsemblPlants" id="TraesCLE_scaffold_070852_01G000400.1">
    <property type="protein sequence ID" value="TraesCLE_scaffold_070852_01G000400.1"/>
    <property type="gene ID" value="TraesCLE_scaffold_070852_01G000400"/>
</dbReference>
<dbReference type="EnsemblPlants" id="TraesCLE_scaffold_075981_01G000100.1">
    <property type="protein sequence ID" value="TraesCLE_scaffold_075981_01G000100.1"/>
    <property type="gene ID" value="TraesCLE_scaffold_075981_01G000100"/>
</dbReference>
<dbReference type="EnsemblPlants" id="TraesCLE_scaffold_078290_01G000100.1">
    <property type="protein sequence ID" value="TraesCLE_scaffold_078290_01G000100.1"/>
    <property type="gene ID" value="TraesCLE_scaffold_078290_01G000100"/>
</dbReference>
<dbReference type="EnsemblPlants" id="TraesCLE_scaffold_079796_01G000100.1">
    <property type="protein sequence ID" value="TraesCLE_scaffold_079796_01G000100.1"/>
    <property type="gene ID" value="TraesCLE_scaffold_079796_01G000100"/>
</dbReference>
<dbReference type="EnsemblPlants" id="TraesCLE_scaffold_083702_01G000100.1">
    <property type="protein sequence ID" value="TraesCLE_scaffold_083702_01G000100.1"/>
    <property type="gene ID" value="TraesCLE_scaffold_083702_01G000100"/>
</dbReference>
<dbReference type="EnsemblPlants" id="TraesCLE_scaffold_091244_01G000100.1">
    <property type="protein sequence ID" value="TraesCLE_scaffold_091244_01G000100.1"/>
    <property type="gene ID" value="TraesCLE_scaffold_091244_01G000100"/>
</dbReference>
<dbReference type="EnsemblPlants" id="TraesCLE_scaffold_092025_01G000400.1">
    <property type="protein sequence ID" value="TraesCLE_scaffold_092025_01G000400.1"/>
    <property type="gene ID" value="TraesCLE_scaffold_092025_01G000400"/>
</dbReference>
<dbReference type="EnsemblPlants" id="TraesCLE_scaffold_092123_01G000100.1">
    <property type="protein sequence ID" value="TraesCLE_scaffold_092123_01G000100.1"/>
    <property type="gene ID" value="TraesCLE_scaffold_092123_01G000100"/>
</dbReference>
<dbReference type="EnsemblPlants" id="TraesCLE_scaffold_100110_01G000500.1">
    <property type="protein sequence ID" value="TraesCLE_scaffold_100110_01G000500.1"/>
    <property type="gene ID" value="TraesCLE_scaffold_100110_01G000500"/>
</dbReference>
<dbReference type="EnsemblPlants" id="TraesCLE_scaffold_100354_01G000100.1">
    <property type="protein sequence ID" value="TraesCLE_scaffold_100354_01G000100.1"/>
    <property type="gene ID" value="TraesCLE_scaffold_100354_01G000100"/>
</dbReference>
<dbReference type="EnsemblPlants" id="TraesCLE_scaffold_103056_01G000200.1">
    <property type="protein sequence ID" value="TraesCLE_scaffold_103056_01G000200.1"/>
    <property type="gene ID" value="TraesCLE_scaffold_103056_01G000200"/>
</dbReference>
<dbReference type="EnsemblPlants" id="TraesCLE_scaffold_104197_01G000300.1">
    <property type="protein sequence ID" value="TraesCLE_scaffold_104197_01G000300.1"/>
    <property type="gene ID" value="TraesCLE_scaffold_104197_01G000300"/>
</dbReference>
<dbReference type="EnsemblPlants" id="TraesCLE_scaffold_110998_01G000100.1">
    <property type="protein sequence ID" value="TraesCLE_scaffold_110998_01G000100.1"/>
    <property type="gene ID" value="TraesCLE_scaffold_110998_01G000100"/>
</dbReference>
<dbReference type="EnsemblPlants" id="TraesCLE_scaffold_111321_01G000200.1">
    <property type="protein sequence ID" value="TraesCLE_scaffold_111321_01G000200.1"/>
    <property type="gene ID" value="TraesCLE_scaffold_111321_01G000200"/>
</dbReference>
<dbReference type="EnsemblPlants" id="TraesCLE_scaffold_113502_01G000100.1">
    <property type="protein sequence ID" value="TraesCLE_scaffold_113502_01G000100.1"/>
    <property type="gene ID" value="TraesCLE_scaffold_113502_01G000100"/>
</dbReference>
<dbReference type="EnsemblPlants" id="TraesCLE_scaffold_118117_01G000100.1">
    <property type="protein sequence ID" value="TraesCLE_scaffold_118117_01G000100.1"/>
    <property type="gene ID" value="TraesCLE_scaffold_118117_01G000100"/>
</dbReference>
<dbReference type="EnsemblPlants" id="TraesCLE_scaffold_121000_01G000100.1">
    <property type="protein sequence ID" value="TraesCLE_scaffold_121000_01G000100.1"/>
    <property type="gene ID" value="TraesCLE_scaffold_121000_01G000100"/>
</dbReference>
<dbReference type="EnsemblPlants" id="TraesCLE_scaffold_140986_01G000100.1">
    <property type="protein sequence ID" value="TraesCLE_scaffold_140986_01G000100.1"/>
    <property type="gene ID" value="TraesCLE_scaffold_140986_01G000100"/>
</dbReference>
<dbReference type="EnsemblPlants" id="TraesCLE_scaffold_145718_01G000300.1">
    <property type="protein sequence ID" value="TraesCLE_scaffold_145718_01G000300.1"/>
    <property type="gene ID" value="TraesCLE_scaffold_145718_01G000300"/>
</dbReference>
<dbReference type="EnsemblPlants" id="TraesCLE_scaffold_157453_01G000100.1">
    <property type="protein sequence ID" value="TraesCLE_scaffold_157453_01G000100.1"/>
    <property type="gene ID" value="TraesCLE_scaffold_157453_01G000100"/>
</dbReference>
<dbReference type="EnsemblPlants" id="TraesCLE_scaffold_162569_01G000200.1">
    <property type="protein sequence ID" value="TraesCLE_scaffold_162569_01G000200.1"/>
    <property type="gene ID" value="TraesCLE_scaffold_162569_01G000200"/>
</dbReference>
<dbReference type="EnsemblPlants" id="TraesCLE_scaffold_167077_01G000200.1">
    <property type="protein sequence ID" value="TraesCLE_scaffold_167077_01G000200.1"/>
    <property type="gene ID" value="TraesCLE_scaffold_167077_01G000200"/>
</dbReference>
<dbReference type="EnsemblPlants" id="TraesCLE_scaffold_172735_01G000100.1">
    <property type="protein sequence ID" value="TraesCLE_scaffold_172735_01G000100.1"/>
    <property type="gene ID" value="TraesCLE_scaffold_172735_01G000100"/>
</dbReference>
<dbReference type="EnsemblPlants" id="TraesCLE_scaffold_177996_01G000100.1">
    <property type="protein sequence ID" value="TraesCLE_scaffold_177996_01G000100.1"/>
    <property type="gene ID" value="TraesCLE_scaffold_177996_01G000100"/>
</dbReference>
<dbReference type="EnsemblPlants" id="TraesCS1A02G229000.1">
    <property type="protein sequence ID" value="TraesCS1A02G229000.1.cds1"/>
    <property type="gene ID" value="TraesCS1A02G229000"/>
</dbReference>
<dbReference type="EnsemblPlants" id="TraesCS1A02G261900.1">
    <property type="protein sequence ID" value="TraesCS1A02G261900.1.cds1"/>
    <property type="gene ID" value="TraesCS1A02G261900"/>
</dbReference>
<dbReference type="EnsemblPlants" id="TraesCS1A02G274300.1">
    <property type="protein sequence ID" value="TraesCS1A02G274300.1.cds1"/>
    <property type="gene ID" value="TraesCS1A02G274300"/>
</dbReference>
<dbReference type="EnsemblPlants" id="TraesCS1A02G359800.1">
    <property type="protein sequence ID" value="TraesCS1A02G359800.1.cds1"/>
    <property type="gene ID" value="TraesCS1A02G359800"/>
</dbReference>
<dbReference type="EnsemblPlants" id="TraesCS1A02G360200.1">
    <property type="protein sequence ID" value="TraesCS1A02G360200.1.cds1"/>
    <property type="gene ID" value="TraesCS1A02G360200"/>
</dbReference>
<dbReference type="EnsemblPlants" id="TraesCS1A02G361900.1">
    <property type="protein sequence ID" value="TraesCS1A02G361900.1.cds1"/>
    <property type="gene ID" value="TraesCS1A02G361900"/>
</dbReference>
<dbReference type="EnsemblPlants" id="TraesCS1A03G0596000.1">
    <property type="protein sequence ID" value="TraesCS1A03G0596000.1.CDS1"/>
    <property type="gene ID" value="TraesCS1A03G0596000"/>
</dbReference>
<dbReference type="EnsemblPlants" id="TraesCS1A03G0669000.1">
    <property type="protein sequence ID" value="TraesCS1A03G0669000.1.CDS1"/>
    <property type="gene ID" value="TraesCS1A03G0669000"/>
</dbReference>
<dbReference type="EnsemblPlants" id="TraesCS1A03G0693100.1">
    <property type="protein sequence ID" value="TraesCS1A03G0693100.1.CDS1"/>
    <property type="gene ID" value="TraesCS1A03G0693100"/>
</dbReference>
<dbReference type="EnsemblPlants" id="TraesCS1A03G0878800.1">
    <property type="protein sequence ID" value="TraesCS1A03G0878800.1.CDS1"/>
    <property type="gene ID" value="TraesCS1A03G0878800"/>
</dbReference>
<dbReference type="EnsemblPlants" id="TraesCS1A03G0879600.1">
    <property type="protein sequence ID" value="TraesCS1A03G0879600.1.CDS1"/>
    <property type="gene ID" value="TraesCS1A03G0879600"/>
</dbReference>
<dbReference type="EnsemblPlants" id="TraesCS1A03G0882500.1">
    <property type="protein sequence ID" value="TraesCS1A03G0882500.1.CDS1"/>
    <property type="gene ID" value="TraesCS1A03G0882500"/>
</dbReference>
<dbReference type="EnsemblPlants" id="TraesCS1B02G245000.1">
    <property type="protein sequence ID" value="TraesCS1B02G245000.1.cds1"/>
    <property type="gene ID" value="TraesCS1B02G245000"/>
</dbReference>
<dbReference type="EnsemblPlants" id="TraesCS1B02G245200.1">
    <property type="protein sequence ID" value="TraesCS1B02G245200.1.cds1"/>
    <property type="gene ID" value="TraesCS1B02G245200"/>
</dbReference>
<dbReference type="EnsemblPlants" id="TraesCS1B02G375900.1">
    <property type="protein sequence ID" value="TraesCS1B02G375900.1.cds1"/>
    <property type="gene ID" value="TraesCS1B02G375900"/>
</dbReference>
<dbReference type="EnsemblPlants" id="TraesCS1B02G376700.1">
    <property type="protein sequence ID" value="TraesCS1B02G376700.1.cds1"/>
    <property type="gene ID" value="TraesCS1B02G376700"/>
</dbReference>
<dbReference type="EnsemblPlants" id="TraesCS1B02G378400.1">
    <property type="protein sequence ID" value="TraesCS1B02G378400.1.cds1"/>
    <property type="gene ID" value="TraesCS1B02G378400"/>
</dbReference>
<dbReference type="EnsemblPlants" id="TraesCS1B02G378600.1">
    <property type="protein sequence ID" value="TraesCS1B02G378600.1.cds1"/>
    <property type="gene ID" value="TraesCS1B02G378600"/>
</dbReference>
<dbReference type="EnsemblPlants" id="TraesCS1B02G378700.1">
    <property type="protein sequence ID" value="TraesCS1B02G378700.1.cds1"/>
    <property type="gene ID" value="TraesCS1B02G378700"/>
</dbReference>
<dbReference type="EnsemblPlants" id="TraesCS1B03G0694400.1">
    <property type="protein sequence ID" value="TraesCS1B03G0694400.1.CDS1"/>
    <property type="gene ID" value="TraesCS1B03G0694400"/>
</dbReference>
<dbReference type="EnsemblPlants" id="TraesCS1B03G0694700.1">
    <property type="protein sequence ID" value="TraesCS1B03G0694700.1.CDS1"/>
    <property type="gene ID" value="TraesCS1B03G0694700"/>
</dbReference>
<dbReference type="EnsemblPlants" id="TraesCS1B03G1024400.1">
    <property type="protein sequence ID" value="TraesCS1B03G1024400.1.CDS1"/>
    <property type="gene ID" value="TraesCS1B03G1024400"/>
</dbReference>
<dbReference type="EnsemblPlants" id="TraesCS1B03G1026700.1">
    <property type="protein sequence ID" value="TraesCS1B03G1026700.1.CDS1"/>
    <property type="gene ID" value="TraesCS1B03G1026700"/>
</dbReference>
<dbReference type="EnsemblPlants" id="TraesCS1B03G1030300.1">
    <property type="protein sequence ID" value="TraesCS1B03G1030300.1.CDS1"/>
    <property type="gene ID" value="TraesCS1B03G1030300"/>
</dbReference>
<dbReference type="EnsemblPlants" id="TraesCS1B03G1030800.1">
    <property type="protein sequence ID" value="TraesCS1B03G1030800.1.CDS1"/>
    <property type="gene ID" value="TraesCS1B03G1030800"/>
</dbReference>
<dbReference type="EnsemblPlants" id="TraesCS1B03G1031100.1">
    <property type="protein sequence ID" value="TraesCS1B03G1031100.1.CDS1"/>
    <property type="gene ID" value="TraesCS1B03G1031100"/>
</dbReference>
<dbReference type="EnsemblPlants" id="TraesCS1D02G233000.1">
    <property type="protein sequence ID" value="TraesCS1D02G233000.1.cds1"/>
    <property type="gene ID" value="TraesCS1D02G233000"/>
</dbReference>
<dbReference type="EnsemblPlants" id="TraesCS1D02G233200.1">
    <property type="protein sequence ID" value="TraesCS1D02G233200.1.cds1"/>
    <property type="gene ID" value="TraesCS1D02G233200"/>
</dbReference>
<dbReference type="EnsemblPlants" id="TraesCS1D02G261900.1">
    <property type="protein sequence ID" value="TraesCS1D02G261900.1.cds1"/>
    <property type="gene ID" value="TraesCS1D02G261900"/>
</dbReference>
<dbReference type="EnsemblPlants" id="TraesCS1D02G274300.1">
    <property type="protein sequence ID" value="TraesCS1D02G274300.1.cds1"/>
    <property type="gene ID" value="TraesCS1D02G274300"/>
</dbReference>
<dbReference type="EnsemblPlants" id="TraesCS1D02G364200.1">
    <property type="protein sequence ID" value="TraesCS1D02G364200.1.cds1"/>
    <property type="gene ID" value="TraesCS1D02G364200"/>
</dbReference>
<dbReference type="EnsemblPlants" id="TraesCS1D02G364600.1">
    <property type="protein sequence ID" value="TraesCS1D02G364600.1.cds1"/>
    <property type="gene ID" value="TraesCS1D02G364600"/>
</dbReference>
<dbReference type="EnsemblPlants" id="TraesCS1D02G366400.1">
    <property type="protein sequence ID" value="TraesCS1D02G366400.1.cds1"/>
    <property type="gene ID" value="TraesCS1D02G366400"/>
</dbReference>
<dbReference type="EnsemblPlants" id="TraesCS1D02G366600.1">
    <property type="protein sequence ID" value="TraesCS1D02G366600.1.cds1"/>
    <property type="gene ID" value="TraesCS1D02G366600"/>
</dbReference>
<dbReference type="EnsemblPlants" id="TraesCS1D03G0571100.1">
    <property type="protein sequence ID" value="TraesCS1D03G0571100.1.CDS1"/>
    <property type="gene ID" value="TraesCS1D03G0571100"/>
</dbReference>
<dbReference type="EnsemblPlants" id="TraesCS1D03G0571300.1">
    <property type="protein sequence ID" value="TraesCS1D03G0571300.1.CDS1"/>
    <property type="gene ID" value="TraesCS1D03G0571300"/>
</dbReference>
<dbReference type="EnsemblPlants" id="TraesCS1D03G0632100.1">
    <property type="protein sequence ID" value="TraesCS1D03G0632100.1.CDS1"/>
    <property type="gene ID" value="TraesCS1D03G0632100"/>
</dbReference>
<dbReference type="EnsemblPlants" id="TraesCS1D03G0659100.1">
    <property type="protein sequence ID" value="TraesCS1D03G0659100.1.CDS1"/>
    <property type="gene ID" value="TraesCS1D03G0659100"/>
</dbReference>
<dbReference type="EnsemblPlants" id="TraesCS1D03G0852600.1">
    <property type="protein sequence ID" value="TraesCS1D03G0852600.1.CDS1"/>
    <property type="gene ID" value="TraesCS1D03G0852600"/>
</dbReference>
<dbReference type="EnsemblPlants" id="TraesCS1D03G0853100.1">
    <property type="protein sequence ID" value="TraesCS1D03G0853100.1.CDS1"/>
    <property type="gene ID" value="TraesCS1D03G0853100"/>
</dbReference>
<dbReference type="EnsemblPlants" id="TraesCS1D03G0856000.1">
    <property type="protein sequence ID" value="TraesCS1D03G0856000.1.CDS1"/>
    <property type="gene ID" value="TraesCS1D03G0856000"/>
</dbReference>
<dbReference type="EnsemblPlants" id="TraesCS1D03G0856400.1">
    <property type="protein sequence ID" value="TraesCS1D03G0856400.1.CDS1"/>
    <property type="gene ID" value="TraesCS1D03G0856400"/>
</dbReference>
<dbReference type="EnsemblPlants" id="TraesCS2A02G377500.1">
    <property type="protein sequence ID" value="TraesCS2A02G377500.1.cds1"/>
    <property type="gene ID" value="TraesCS2A02G377500"/>
</dbReference>
<dbReference type="EnsemblPlants" id="TraesCS2A03G0915900.1">
    <property type="protein sequence ID" value="TraesCS2A03G0915900.1.CDS1"/>
    <property type="gene ID" value="TraesCS2A03G0915900"/>
</dbReference>
<dbReference type="EnsemblPlants" id="TraesCS2B02G315500.1">
    <property type="protein sequence ID" value="TraesCS2B02G315500.1.cds1"/>
    <property type="gene ID" value="TraesCS2B02G315500"/>
</dbReference>
<dbReference type="EnsemblPlants" id="TraesCS2B03G0821800.1">
    <property type="protein sequence ID" value="TraesCS2B03G0821800.1.CDS1"/>
    <property type="gene ID" value="TraesCS2B03G0821800"/>
</dbReference>
<dbReference type="EnsemblPlants" id="TraesCS2D02G297000.1">
    <property type="protein sequence ID" value="TraesCS2D02G297000.1.cds1"/>
    <property type="gene ID" value="TraesCS2D02G297000"/>
</dbReference>
<dbReference type="EnsemblPlants" id="TraesCS2D03G0687300.1">
    <property type="protein sequence ID" value="TraesCS2D03G0687300.1.CDS1"/>
    <property type="gene ID" value="TraesCS2D03G0687300"/>
</dbReference>
<dbReference type="EnsemblPlants" id="TraesCS3A02G134000.1">
    <property type="protein sequence ID" value="TraesCS3A02G134000.1.cds1"/>
    <property type="gene ID" value="TraesCS3A02G134000"/>
</dbReference>
<dbReference type="EnsemblPlants" id="TraesCS3A02G377400.1">
    <property type="protein sequence ID" value="TraesCS3A02G377400.1.cds1"/>
    <property type="gene ID" value="TraesCS3A02G377400"/>
</dbReference>
<dbReference type="EnsemblPlants" id="TraesCS3A03G0316900.1">
    <property type="protein sequence ID" value="TraesCS3A03G0316900.1.CDS1"/>
    <property type="gene ID" value="TraesCS3A03G0316900"/>
</dbReference>
<dbReference type="EnsemblPlants" id="TraesCS3A03G0891800.1">
    <property type="protein sequence ID" value="TraesCS3A03G0891800.1.CDS1"/>
    <property type="gene ID" value="TraesCS3A03G0891800"/>
</dbReference>
<dbReference type="EnsemblPlants" id="TraesCS3B02G299200.1">
    <property type="protein sequence ID" value="TraesCS3B02G299200.1.cds1"/>
    <property type="gene ID" value="TraesCS3B02G299200"/>
</dbReference>
<dbReference type="EnsemblPlants" id="TraesCS3B03G0770900.1">
    <property type="protein sequence ID" value="TraesCS3B03G0770900.1.CDS1"/>
    <property type="gene ID" value="TraesCS3B03G0770900"/>
</dbReference>
<dbReference type="EnsemblPlants" id="TraesCS3D02G150300.1">
    <property type="protein sequence ID" value="TraesCS3D02G150300.1.cds1"/>
    <property type="gene ID" value="TraesCS3D02G150300"/>
</dbReference>
<dbReference type="EnsemblPlants" id="TraesCS3D02G370500.1">
    <property type="protein sequence ID" value="TraesCS3D02G370500.1.cds1"/>
    <property type="gene ID" value="TraesCS3D02G370500"/>
</dbReference>
<dbReference type="EnsemblPlants" id="TraesCS3D03G0317700.1">
    <property type="protein sequence ID" value="TraesCS3D03G0317700.1.CDS1"/>
    <property type="gene ID" value="TraesCS3D03G0317700"/>
</dbReference>
<dbReference type="EnsemblPlants" id="TraesCS3D03G0819300.1">
    <property type="protein sequence ID" value="TraesCS3D03G0819300.1.CDS1"/>
    <property type="gene ID" value="TraesCS3D03G0819300"/>
</dbReference>
<dbReference type="EnsemblPlants" id="TraesCS4A02G030300.1">
    <property type="protein sequence ID" value="TraesCS4A02G030300.1.cds1"/>
    <property type="gene ID" value="TraesCS4A02G030300"/>
</dbReference>
<dbReference type="EnsemblPlants" id="TraesCS4A02G057500.1">
    <property type="protein sequence ID" value="TraesCS4A02G057500.1.cds1"/>
    <property type="gene ID" value="TraesCS4A02G057500"/>
</dbReference>
<dbReference type="EnsemblPlants" id="TraesCS4A02G402000.1">
    <property type="protein sequence ID" value="TraesCS4A02G402000.1.cds1"/>
    <property type="gene ID" value="TraesCS4A02G402000"/>
</dbReference>
<dbReference type="EnsemblPlants" id="TraesCS4A03G0057300.1">
    <property type="protein sequence ID" value="TraesCS4A03G0057300.1.CDS1"/>
    <property type="gene ID" value="TraesCS4A03G0057300"/>
</dbReference>
<dbReference type="EnsemblPlants" id="TraesCS4A03G0112400.1">
    <property type="protein sequence ID" value="TraesCS4A03G0112400.1.CDS1"/>
    <property type="gene ID" value="TraesCS4A03G0112400"/>
</dbReference>
<dbReference type="EnsemblPlants" id="TraesCS4A03G0999700.1">
    <property type="protein sequence ID" value="TraesCS4A03G0999700.1.CDS1"/>
    <property type="gene ID" value="TraesCS4A03G0999700"/>
</dbReference>
<dbReference type="EnsemblPlants" id="TraesCS4D02G246800.1">
    <property type="protein sequence ID" value="TraesCS4D02G246800.1.cds1"/>
    <property type="gene ID" value="TraesCS4D02G246800"/>
</dbReference>
<dbReference type="EnsemblPlants" id="TraesCS4D02G274000.1">
    <property type="protein sequence ID" value="TraesCS4D02G274000.1.cds1"/>
    <property type="gene ID" value="TraesCS4D02G274000"/>
</dbReference>
<dbReference type="EnsemblPlants" id="TraesCS4D03G0592800.1">
    <property type="protein sequence ID" value="TraesCS4D03G0592800.1.CDS1"/>
    <property type="gene ID" value="TraesCS4D03G0592800"/>
</dbReference>
<dbReference type="EnsemblPlants" id="TraesCS4D03G0649200.1">
    <property type="protein sequence ID" value="TraesCS4D03G0649200.1.CDS1"/>
    <property type="gene ID" value="TraesCS4D03G0649200"/>
</dbReference>
<dbReference type="EnsemblPlants" id="TraesCS5B02G186900.1">
    <property type="protein sequence ID" value="TraesCS5B02G186900.1.cds1"/>
    <property type="gene ID" value="TraesCS5B02G186900"/>
</dbReference>
<dbReference type="EnsemblPlants" id="TraesCS5B03G0497500.1">
    <property type="protein sequence ID" value="TraesCS5B03G0497500.1.CDS1"/>
    <property type="gene ID" value="TraesCS5B03G0497500"/>
</dbReference>
<dbReference type="EnsemblPlants" id="TraesCS5D02G194100.1">
    <property type="protein sequence ID" value="TraesCS5D02G194100.1.cds1"/>
    <property type="gene ID" value="TraesCS5D02G194100"/>
</dbReference>
<dbReference type="EnsemblPlants" id="TraesCS5D03G0460500.1">
    <property type="protein sequence ID" value="TraesCS5D03G0460500.1.CDS1"/>
    <property type="gene ID" value="TraesCS5D03G0460500"/>
</dbReference>
<dbReference type="EnsemblPlants" id="TraesCS6A02G061500.1">
    <property type="protein sequence ID" value="TraesCS6A02G061500.1.cds1"/>
    <property type="gene ID" value="TraesCS6A02G061500"/>
</dbReference>
<dbReference type="EnsemblPlants" id="TraesCS6A02G063400.1">
    <property type="protein sequence ID" value="TraesCS6A02G063400.1.cds1"/>
    <property type="gene ID" value="TraesCS6A02G063400"/>
</dbReference>
<dbReference type="EnsemblPlants" id="TraesCS6A02G155800.1">
    <property type="protein sequence ID" value="TraesCS6A02G155800.1.cds1"/>
    <property type="gene ID" value="TraesCS6A02G155800"/>
</dbReference>
<dbReference type="EnsemblPlants" id="TraesCS6A03G0138300.1">
    <property type="protein sequence ID" value="TraesCS6A03G0138300.1.CDS1"/>
    <property type="gene ID" value="TraesCS6A03G0138300"/>
</dbReference>
<dbReference type="EnsemblPlants" id="TraesCS6A03G0141500.1">
    <property type="protein sequence ID" value="TraesCS6A03G0141500.1.CDS1"/>
    <property type="gene ID" value="TraesCS6A03G0141500"/>
</dbReference>
<dbReference type="EnsemblPlants" id="TraesCS6A03G0377700.1">
    <property type="protein sequence ID" value="TraesCS6A03G0377700.1.CDS1"/>
    <property type="gene ID" value="TraesCS6A03G0377700"/>
</dbReference>
<dbReference type="EnsemblPlants" id="TraesCS6B02G081800.1">
    <property type="protein sequence ID" value="TraesCS6B02G081800.1.cds1"/>
    <property type="gene ID" value="TraesCS6B02G081800"/>
</dbReference>
<dbReference type="EnsemblPlants" id="TraesCS6B02G082200.1">
    <property type="protein sequence ID" value="TraesCS6B02G082200.1.cds1"/>
    <property type="gene ID" value="TraesCS6B02G082200"/>
</dbReference>
<dbReference type="EnsemblPlants" id="TraesCS6B02G084700.1">
    <property type="protein sequence ID" value="TraesCS6B02G084700.1.cds1"/>
    <property type="gene ID" value="TraesCS6B02G084700"/>
</dbReference>
<dbReference type="EnsemblPlants" id="TraesCS6B03G0194100.1">
    <property type="protein sequence ID" value="TraesCS6B03G0194100.1.CDS1"/>
    <property type="gene ID" value="TraesCS6B03G0194100"/>
</dbReference>
<dbReference type="EnsemblPlants" id="TraesCS6B03G0195100.1">
    <property type="protein sequence ID" value="TraesCS6B03G0195100.1.CDS1"/>
    <property type="gene ID" value="TraesCS6B03G0195100"/>
</dbReference>
<dbReference type="EnsemblPlants" id="TraesCS6B03G0200400.1">
    <property type="protein sequence ID" value="TraesCS6B03G0200400.1.CDS1"/>
    <property type="gene ID" value="TraesCS6B03G0200400"/>
</dbReference>
<dbReference type="EnsemblPlants" id="TraesCS6D02G061300.1">
    <property type="protein sequence ID" value="TraesCS6D02G061300.1.cds1"/>
    <property type="gene ID" value="TraesCS6D02G061300"/>
</dbReference>
<dbReference type="EnsemblPlants" id="TraesCS6D02G063000.1">
    <property type="protein sequence ID" value="TraesCS6D02G063000.1.cds1"/>
    <property type="gene ID" value="TraesCS6D02G063000"/>
</dbReference>
<dbReference type="EnsemblPlants" id="TraesCS6D02G082800.1">
    <property type="protein sequence ID" value="TraesCS6D02G082800.1.cds1"/>
    <property type="gene ID" value="TraesCS6D02G082800"/>
</dbReference>
<dbReference type="EnsemblPlants" id="TraesCS6D02G145800.1">
    <property type="protein sequence ID" value="TraesCS6D02G145800.1.cds1"/>
    <property type="gene ID" value="TraesCS6D02G145800"/>
</dbReference>
<dbReference type="EnsemblPlants" id="TraesCS6D03G0130900.1">
    <property type="protein sequence ID" value="TraesCS6D03G0130900.1.CDS1"/>
    <property type="gene ID" value="TraesCS6D03G0130900"/>
</dbReference>
<dbReference type="EnsemblPlants" id="TraesCS6D03G0134000.1">
    <property type="protein sequence ID" value="TraesCS6D03G0134000.1.CDS1"/>
    <property type="gene ID" value="TraesCS6D03G0134000"/>
</dbReference>
<dbReference type="EnsemblPlants" id="TraesCS6D03G0187000.1">
    <property type="protein sequence ID" value="TraesCS6D03G0187000.1.CDS1"/>
    <property type="gene ID" value="TraesCS6D03G0187000"/>
</dbReference>
<dbReference type="EnsemblPlants" id="TraesCS6D03G0324900.1">
    <property type="protein sequence ID" value="TraesCS6D03G0324900.1.CDS1"/>
    <property type="gene ID" value="TraesCS6D03G0324900"/>
</dbReference>
<dbReference type="EnsemblPlants" id="TraesCS7A02G102900.1">
    <property type="protein sequence ID" value="TraesCS7A02G102900.1.cds1"/>
    <property type="gene ID" value="TraesCS7A02G102900"/>
</dbReference>
<dbReference type="EnsemblPlants" id="TraesCS7A02G103900.1">
    <property type="protein sequence ID" value="TraesCS7A02G103900.1.cds1"/>
    <property type="gene ID" value="TraesCS7A02G103900"/>
</dbReference>
<dbReference type="EnsemblPlants" id="TraesCS7A02G119400.1">
    <property type="protein sequence ID" value="TraesCS7A02G119400.1.cds1"/>
    <property type="gene ID" value="TraesCS7A02G119400"/>
</dbReference>
<dbReference type="EnsemblPlants" id="TraesCS7A02G119700.1">
    <property type="protein sequence ID" value="TraesCS7A02G119700.1.cds1"/>
    <property type="gene ID" value="TraesCS7A02G119700"/>
</dbReference>
<dbReference type="EnsemblPlants" id="TraesCS7A03G0244100.1">
    <property type="protein sequence ID" value="TraesCS7A03G0244100.1.CDS1"/>
    <property type="gene ID" value="TraesCS7A03G0244100"/>
</dbReference>
<dbReference type="EnsemblPlants" id="TraesCS7A03G0246100.1">
    <property type="protein sequence ID" value="TraesCS7A03G0246100.1.CDS1"/>
    <property type="gene ID" value="TraesCS7A03G0246100"/>
</dbReference>
<dbReference type="EnsemblPlants" id="TraesCS7A03G0283000.1">
    <property type="protein sequence ID" value="TraesCS7A03G0283000.1.CDS1"/>
    <property type="gene ID" value="TraesCS7A03G0283000"/>
</dbReference>
<dbReference type="EnsemblPlants" id="TraesCS7A03G0284300.1">
    <property type="protein sequence ID" value="TraesCS7A03G0284300.1.CDS1"/>
    <property type="gene ID" value="TraesCS7A03G0284300"/>
</dbReference>
<dbReference type="EnsemblPlants" id="TraesCS7B02G016000.1">
    <property type="protein sequence ID" value="TraesCS7B02G016000.1.cds1"/>
    <property type="gene ID" value="TraesCS7B02G016000"/>
</dbReference>
<dbReference type="EnsemblPlants" id="TraesCS7B02G016700.1">
    <property type="protein sequence ID" value="TraesCS7B02G016700.1.cds1"/>
    <property type="gene ID" value="TraesCS7B02G016700"/>
</dbReference>
<dbReference type="EnsemblPlants" id="TraesCS7B02G016900.1">
    <property type="protein sequence ID" value="TraesCS7B02G016900.1.cds1"/>
    <property type="gene ID" value="TraesCS7B02G016900"/>
</dbReference>
<dbReference type="EnsemblPlants" id="TraesCS7B02G017000.1">
    <property type="protein sequence ID" value="TraesCS7B02G017000.1.cds1"/>
    <property type="gene ID" value="TraesCS7B02G017000"/>
</dbReference>
<dbReference type="EnsemblPlants" id="TraesCS7B02G017400.1">
    <property type="protein sequence ID" value="TraesCS7B02G017400.1.cds1"/>
    <property type="gene ID" value="TraesCS7B02G017400"/>
</dbReference>
<dbReference type="EnsemblPlants" id="TraesCS7B02G019000.1">
    <property type="protein sequence ID" value="TraesCS7B02G019000.1.cds1"/>
    <property type="gene ID" value="TraesCS7B02G019000"/>
</dbReference>
<dbReference type="EnsemblPlants" id="TraesCS7B03G0040100.1">
    <property type="protein sequence ID" value="TraesCS7B03G0040100.1.CDS1"/>
    <property type="gene ID" value="TraesCS7B03G0040100"/>
</dbReference>
<dbReference type="EnsemblPlants" id="TraesCS7B03G0043600.1">
    <property type="protein sequence ID" value="TraesCS7B03G0043600.1.CDS1"/>
    <property type="gene ID" value="TraesCS7B03G0043600"/>
</dbReference>
<dbReference type="EnsemblPlants" id="TraesCS7B03G0044300.1">
    <property type="protein sequence ID" value="TraesCS7B03G0044300.1.CDS1"/>
    <property type="gene ID" value="TraesCS7B03G0044300"/>
</dbReference>
<dbReference type="EnsemblPlants" id="TraesCS7B03G0044400.1">
    <property type="protein sequence ID" value="TraesCS7B03G0044400.1.CDS1"/>
    <property type="gene ID" value="TraesCS7B03G0044400"/>
</dbReference>
<dbReference type="EnsemblPlants" id="TraesCS7B03G0044800.1">
    <property type="protein sequence ID" value="TraesCS7B03G0044800.1.CDS1"/>
    <property type="gene ID" value="TraesCS7B03G0044800"/>
</dbReference>
<dbReference type="EnsemblPlants" id="TraesCS7B03G0049800.1">
    <property type="protein sequence ID" value="TraesCS7B03G0049800.1.CDS1"/>
    <property type="gene ID" value="TraesCS7B03G0049800"/>
</dbReference>
<dbReference type="EnsemblPlants" id="TraesCS7D02G096900.1">
    <property type="protein sequence ID" value="TraesCS7D02G096900.1.cds1"/>
    <property type="gene ID" value="TraesCS7D02G096900"/>
</dbReference>
<dbReference type="EnsemblPlants" id="TraesCS7D02G097600.1">
    <property type="protein sequence ID" value="TraesCS7D02G097600.1.cds1"/>
    <property type="gene ID" value="TraesCS7D02G097600"/>
</dbReference>
<dbReference type="EnsemblPlants" id="TraesCS7D02G115400.1">
    <property type="protein sequence ID" value="TraesCS7D02G115400.1.cds1"/>
    <property type="gene ID" value="TraesCS7D02G115400"/>
</dbReference>
<dbReference type="EnsemblPlants" id="TraesCS7D02G116600.1">
    <property type="protein sequence ID" value="TraesCS7D02G116600.1.cds1"/>
    <property type="gene ID" value="TraesCS7D02G116600"/>
</dbReference>
<dbReference type="EnsemblPlants" id="TraesCS7D02G116800.1">
    <property type="protein sequence ID" value="TraesCS7D02G116800.1.cds1"/>
    <property type="gene ID" value="TraesCS7D02G116800"/>
</dbReference>
<dbReference type="EnsemblPlants" id="TraesCS7D02G116900.1">
    <property type="protein sequence ID" value="TraesCS7D02G116900.1.cds1"/>
    <property type="gene ID" value="TraesCS7D02G116900"/>
</dbReference>
<dbReference type="EnsemblPlants" id="TraesCS7D02G117100.1">
    <property type="protein sequence ID" value="TraesCS7D02G117100.1.cds1"/>
    <property type="gene ID" value="TraesCS7D02G117100"/>
</dbReference>
<dbReference type="EnsemblPlants" id="TraesCS7D02G143500.1">
    <property type="protein sequence ID" value="TraesCS7D02G143500.1.cds1"/>
    <property type="gene ID" value="TraesCS7D02G143500"/>
</dbReference>
<dbReference type="EnsemblPlants" id="TraesCS7D03G0220100.1">
    <property type="protein sequence ID" value="TraesCS7D03G0220100.1.CDS1"/>
    <property type="gene ID" value="TraesCS7D03G0220100"/>
</dbReference>
<dbReference type="EnsemblPlants" id="TraesCS7D03G0221800.1">
    <property type="protein sequence ID" value="TraesCS7D03G0221800.1.CDS1"/>
    <property type="gene ID" value="TraesCS7D03G0221800"/>
</dbReference>
<dbReference type="EnsemblPlants" id="TraesCS7D03G0259100.1">
    <property type="protein sequence ID" value="TraesCS7D03G0259100.1.CDS1"/>
    <property type="gene ID" value="TraesCS7D03G0259100"/>
</dbReference>
<dbReference type="EnsemblPlants" id="TraesCS7D03G0261200.1">
    <property type="protein sequence ID" value="TraesCS7D03G0261200.1.CDS1"/>
    <property type="gene ID" value="TraesCS7D03G0261200"/>
</dbReference>
<dbReference type="EnsemblPlants" id="TraesCS7D03G0261500.1">
    <property type="protein sequence ID" value="TraesCS7D03G0261500.1.CDS1"/>
    <property type="gene ID" value="TraesCS7D03G0261500"/>
</dbReference>
<dbReference type="EnsemblPlants" id="TraesCS7D03G0261900.1">
    <property type="protein sequence ID" value="TraesCS7D03G0261900.1.CDS1"/>
    <property type="gene ID" value="TraesCS7D03G0261900"/>
</dbReference>
<dbReference type="EnsemblPlants" id="TraesCS7D03G0262700.1">
    <property type="protein sequence ID" value="TraesCS7D03G0262700.1.CDS1"/>
    <property type="gene ID" value="TraesCS7D03G0262700"/>
</dbReference>
<dbReference type="EnsemblPlants" id="TraesCS7D03G0322700.1">
    <property type="protein sequence ID" value="TraesCS7D03G0322700.1.CDS1"/>
    <property type="gene ID" value="TraesCS7D03G0322700"/>
</dbReference>
<dbReference type="EnsemblPlants" id="TraesCSU02G093200.1">
    <property type="protein sequence ID" value="TraesCSU02G093200.1.cds1"/>
    <property type="gene ID" value="TraesCSU02G093200"/>
</dbReference>
<dbReference type="EnsemblPlants" id="TraesCSU02G093400.1">
    <property type="protein sequence ID" value="TraesCSU02G093400.1.cds1"/>
    <property type="gene ID" value="TraesCSU02G093400"/>
</dbReference>
<dbReference type="EnsemblPlants" id="TraesCSU02G095700.1">
    <property type="protein sequence ID" value="TraesCSU02G095700.1.cds1"/>
    <property type="gene ID" value="TraesCSU02G095700"/>
</dbReference>
<dbReference type="EnsemblPlants" id="TraesCSU02G095800.1">
    <property type="protein sequence ID" value="TraesCSU02G095800.1.cds1"/>
    <property type="gene ID" value="TraesCSU02G095800"/>
</dbReference>
<dbReference type="EnsemblPlants" id="TraesCSU02G182300.1">
    <property type="protein sequence ID" value="TraesCSU02G182300.1.cds1"/>
    <property type="gene ID" value="TraesCSU02G182300"/>
</dbReference>
<dbReference type="EnsemblPlants" id="TraesCSU03G0093200.1">
    <property type="protein sequence ID" value="TraesCSU03G0093200.1.CDS1"/>
    <property type="gene ID" value="TraesCSU03G0093200"/>
</dbReference>
<dbReference type="EnsemblPlants" id="TraesCSU03G0093300.1">
    <property type="protein sequence ID" value="TraesCSU03G0093300.1.CDS1"/>
    <property type="gene ID" value="TraesCSU03G0093300"/>
</dbReference>
<dbReference type="EnsemblPlants" id="TraesCSU03G0256200.1">
    <property type="protein sequence ID" value="TraesCSU03G0256200.1.CDS1"/>
    <property type="gene ID" value="TraesCSU03G0256200"/>
</dbReference>
<dbReference type="EnsemblPlants" id="TraesJAG1A03G00107150.1">
    <property type="protein sequence ID" value="TraesJAG1A03G00107150.1.CDS1"/>
    <property type="gene ID" value="TraesJAG1A03G00107150"/>
</dbReference>
<dbReference type="EnsemblPlants" id="TraesJAG1A03G00119720.1">
    <property type="protein sequence ID" value="TraesJAG1A03G00119720.1.CDS1"/>
    <property type="gene ID" value="TraesJAG1A03G00119720"/>
</dbReference>
<dbReference type="EnsemblPlants" id="TraesJAG1A03G00123580.1">
    <property type="protein sequence ID" value="TraesJAG1A03G00123580.1.CDS1"/>
    <property type="gene ID" value="TraesJAG1A03G00123580"/>
</dbReference>
<dbReference type="EnsemblPlants" id="TraesJAG1A03G00152740.1">
    <property type="protein sequence ID" value="TraesJAG1A03G00152740.1.CDS1"/>
    <property type="gene ID" value="TraesJAG1A03G00152740"/>
</dbReference>
<dbReference type="EnsemblPlants" id="TraesJAG1A03G00152820.1">
    <property type="protein sequence ID" value="TraesJAG1A03G00152820.1.CDS1"/>
    <property type="gene ID" value="TraesJAG1A03G00152820"/>
</dbReference>
<dbReference type="EnsemblPlants" id="TraesJAG1A03G00153260.1">
    <property type="protein sequence ID" value="TraesJAG1A03G00153260.1.CDS1"/>
    <property type="gene ID" value="TraesJAG1A03G00153260"/>
</dbReference>
<dbReference type="EnsemblPlants" id="TraesJAG1B03G00308100.1">
    <property type="protein sequence ID" value="TraesJAG1B03G00308100.1.CDS1"/>
    <property type="gene ID" value="TraesJAG1B03G00308100"/>
</dbReference>
<dbReference type="EnsemblPlants" id="TraesJAG1B03G00308130.1">
    <property type="protein sequence ID" value="TraesJAG1B03G00308130.1.CDS1"/>
    <property type="gene ID" value="TraesJAG1B03G00308130"/>
</dbReference>
<dbReference type="EnsemblPlants" id="TraesJAG1B03G00324530.1">
    <property type="protein sequence ID" value="TraesJAG1B03G00324530.1.CDS1"/>
    <property type="gene ID" value="TraesJAG1B03G00324530"/>
</dbReference>
<dbReference type="EnsemblPlants" id="TraesJAG1B03G00363560.1">
    <property type="protein sequence ID" value="TraesJAG1B03G00363560.1.CDS1"/>
    <property type="gene ID" value="TraesJAG1B03G00363560"/>
</dbReference>
<dbReference type="EnsemblPlants" id="TraesJAG1B03G00363620.1">
    <property type="protein sequence ID" value="TraesJAG1B03G00363620.1.CDS1"/>
    <property type="gene ID" value="TraesJAG1B03G00363620"/>
</dbReference>
<dbReference type="EnsemblPlants" id="TraesJAG1B03G00363730.1">
    <property type="protein sequence ID" value="TraesJAG1B03G00363730.1.CDS1"/>
    <property type="gene ID" value="TraesJAG1B03G00363730"/>
</dbReference>
<dbReference type="EnsemblPlants" id="TraesJAG1B03G00364400.1">
    <property type="protein sequence ID" value="TraesJAG1B03G00364400.1.CDS1"/>
    <property type="gene ID" value="TraesJAG1B03G00364400"/>
</dbReference>
<dbReference type="EnsemblPlants" id="TraesJAG1B03G00364900.1">
    <property type="protein sequence ID" value="TraesJAG1B03G00364900.1.CDS1"/>
    <property type="gene ID" value="TraesJAG1B03G00364900"/>
</dbReference>
<dbReference type="EnsemblPlants" id="TraesJAG1D03G00502230.1">
    <property type="protein sequence ID" value="TraesJAG1D03G00502230.1.CDS1"/>
    <property type="gene ID" value="TraesJAG1D03G00502230"/>
</dbReference>
<dbReference type="EnsemblPlants" id="TraesJAG1D03G00502280.1">
    <property type="protein sequence ID" value="TraesJAG1D03G00502280.1.CDS1"/>
    <property type="gene ID" value="TraesJAG1D03G00502280"/>
</dbReference>
<dbReference type="EnsemblPlants" id="TraesJAG1D03G00512470.1">
    <property type="protein sequence ID" value="TraesJAG1D03G00512470.1.CDS1"/>
    <property type="gene ID" value="TraesJAG1D03G00512470"/>
</dbReference>
<dbReference type="EnsemblPlants" id="TraesJAG1D03G00517200.1">
    <property type="protein sequence ID" value="TraesJAG1D03G00517200.1.CDS1"/>
    <property type="gene ID" value="TraesJAG1D03G00517200"/>
</dbReference>
<dbReference type="EnsemblPlants" id="TraesJAG1D03G00547990.1">
    <property type="protein sequence ID" value="TraesJAG1D03G00547990.1.CDS1"/>
    <property type="gene ID" value="TraesJAG1D03G00547990"/>
</dbReference>
<dbReference type="EnsemblPlants" id="TraesJAG1D03G00548080.1">
    <property type="protein sequence ID" value="TraesJAG1D03G00548080.1.CDS1"/>
    <property type="gene ID" value="TraesJAG1D03G00548080"/>
</dbReference>
<dbReference type="EnsemblPlants" id="TraesJAG1D03G00548580.1">
    <property type="protein sequence ID" value="TraesJAG1D03G00548580.1.CDS1"/>
    <property type="gene ID" value="TraesJAG1D03G00548580"/>
</dbReference>
<dbReference type="EnsemblPlants" id="TraesJAG1D03G00548670.1">
    <property type="protein sequence ID" value="TraesJAG1D03G00548670.1.CDS1"/>
    <property type="gene ID" value="TraesJAG1D03G00548670"/>
</dbReference>
<dbReference type="EnsemblPlants" id="TraesJAG2A03G00746920.1">
    <property type="protein sequence ID" value="TraesJAG2A03G00746920.1.CDS1"/>
    <property type="gene ID" value="TraesJAG2A03G00746920"/>
</dbReference>
<dbReference type="EnsemblPlants" id="TraesJAG2B03G00959840.1">
    <property type="protein sequence ID" value="TraesJAG2B03G00959840.1.CDS1"/>
    <property type="gene ID" value="TraesJAG2B03G00959840"/>
</dbReference>
<dbReference type="EnsemblPlants" id="TraesJAG2D03G01208510.1">
    <property type="protein sequence ID" value="TraesJAG2D03G01208510.1.CDS1"/>
    <property type="gene ID" value="TraesJAG2D03G01208510"/>
</dbReference>
<dbReference type="EnsemblPlants" id="TraesJAG3A03G01365560.1">
    <property type="protein sequence ID" value="TraesJAG3A03G01365560.1.CDS1"/>
    <property type="gene ID" value="TraesJAG3A03G01365560"/>
</dbReference>
<dbReference type="EnsemblPlants" id="TraesJAG3A03G01477340.1">
    <property type="protein sequence ID" value="TraesJAG3A03G01477340.1.CDS1"/>
    <property type="gene ID" value="TraesJAG3A03G01477340"/>
</dbReference>
<dbReference type="EnsemblPlants" id="TraesJAG3B03G01608180.1">
    <property type="protein sequence ID" value="TraesJAG3B03G01608180.1.CDS1"/>
    <property type="gene ID" value="TraesJAG3B03G01608180"/>
</dbReference>
<dbReference type="EnsemblPlants" id="TraesJAG3B03G01680680.1">
    <property type="protein sequence ID" value="TraesJAG3B03G01680680.1.CDS1"/>
    <property type="gene ID" value="TraesJAG3B03G01680680"/>
</dbReference>
<dbReference type="EnsemblPlants" id="TraesJAG3D03G01854300.1">
    <property type="protein sequence ID" value="TraesJAG3D03G01854300.1.CDS1"/>
    <property type="gene ID" value="TraesJAG3D03G01854300"/>
</dbReference>
<dbReference type="EnsemblPlants" id="TraesJAG3D03G01951210.1">
    <property type="protein sequence ID" value="TraesJAG3D03G01951210.1.CDS1"/>
    <property type="gene ID" value="TraesJAG3D03G01951210"/>
</dbReference>
<dbReference type="EnsemblPlants" id="TraesJAG4A03G02020740.1">
    <property type="protein sequence ID" value="TraesJAG4A03G02020740.1.CDS1"/>
    <property type="gene ID" value="TraesJAG4A03G02020740"/>
</dbReference>
<dbReference type="EnsemblPlants" id="TraesJAG4A03G02030130.1">
    <property type="protein sequence ID" value="TraesJAG4A03G02030130.1.CDS1"/>
    <property type="gene ID" value="TraesJAG4A03G02030130"/>
</dbReference>
<dbReference type="EnsemblPlants" id="TraesJAG4A03G02178200.1">
    <property type="protein sequence ID" value="TraesJAG4A03G02178200.1.CDS1"/>
    <property type="gene ID" value="TraesJAG4A03G02178200"/>
</dbReference>
<dbReference type="EnsemblPlants" id="TraesJAG4A03G02178260.1">
    <property type="protein sequence ID" value="TraesJAG4A03G02178260.1.CDS1"/>
    <property type="gene ID" value="TraesJAG4A03G02178260"/>
</dbReference>
<dbReference type="EnsemblPlants" id="TraesJAG4B03G02364370.1">
    <property type="protein sequence ID" value="TraesJAG4B03G02364370.1.CDS1"/>
    <property type="gene ID" value="TraesJAG4B03G02364370"/>
</dbReference>
<dbReference type="EnsemblPlants" id="TraesJAG4D03G02522600.1">
    <property type="protein sequence ID" value="TraesJAG4D03G02522600.1.CDS1"/>
    <property type="gene ID" value="TraesJAG4D03G02522600"/>
</dbReference>
<dbReference type="EnsemblPlants" id="TraesJAG4D03G02532300.1">
    <property type="protein sequence ID" value="TraesJAG4D03G02532300.1.CDS1"/>
    <property type="gene ID" value="TraesJAG4D03G02532300"/>
</dbReference>
<dbReference type="EnsemblPlants" id="TraesJAG5B03G02881780.1">
    <property type="protein sequence ID" value="TraesJAG5B03G02881780.1.CDS1"/>
    <property type="gene ID" value="TraesJAG5B03G02881780"/>
</dbReference>
<dbReference type="EnsemblPlants" id="TraesJAG5D03G03113660.1">
    <property type="protein sequence ID" value="TraesJAG5D03G03113660.1.CDS1"/>
    <property type="gene ID" value="TraesJAG5D03G03113660"/>
</dbReference>
<dbReference type="EnsemblPlants" id="TraesJAG6A03G03250210.1">
    <property type="protein sequence ID" value="TraesJAG6A03G03250210.1.CDS1"/>
    <property type="gene ID" value="TraesJAG6A03G03250210"/>
</dbReference>
<dbReference type="EnsemblPlants" id="TraesJAG6A03G03262670.1">
    <property type="protein sequence ID" value="TraesJAG6A03G03262670.1.CDS1"/>
    <property type="gene ID" value="TraesJAG6A03G03262670"/>
</dbReference>
<dbReference type="EnsemblPlants" id="TraesJAG6A03G03287230.1">
    <property type="protein sequence ID" value="TraesJAG6A03G03287230.1.CDS1"/>
    <property type="gene ID" value="TraesJAG6A03G03287230"/>
</dbReference>
<dbReference type="EnsemblPlants" id="TraesJAG6B03G03437870.1">
    <property type="protein sequence ID" value="TraesJAG6B03G03437870.1.CDS1"/>
    <property type="gene ID" value="TraesJAG6B03G03437870"/>
</dbReference>
<dbReference type="EnsemblPlants" id="TraesJAG6B03G03438950.1">
    <property type="protein sequence ID" value="TraesJAG6B03G03438950.1.CDS1"/>
    <property type="gene ID" value="TraesJAG6B03G03438950"/>
</dbReference>
<dbReference type="EnsemblPlants" id="TraesJAG6D03G03653710.1">
    <property type="protein sequence ID" value="TraesJAG6D03G03653710.1.CDS1"/>
    <property type="gene ID" value="TraesJAG6D03G03653710"/>
</dbReference>
<dbReference type="EnsemblPlants" id="TraesJAG6D03G03676330.1">
    <property type="protein sequence ID" value="TraesJAG6D03G03676330.1.CDS1"/>
    <property type="gene ID" value="TraesJAG6D03G03676330"/>
</dbReference>
<dbReference type="EnsemblPlants" id="TraesJAG7A03G03817840.1">
    <property type="protein sequence ID" value="TraesJAG7A03G03817840.1.CDS1"/>
    <property type="gene ID" value="TraesJAG7A03G03817840"/>
</dbReference>
<dbReference type="EnsemblPlants" id="TraesJAG7A03G03818130.1">
    <property type="protein sequence ID" value="TraesJAG7A03G03818130.1.CDS1"/>
    <property type="gene ID" value="TraesJAG7A03G03818130"/>
</dbReference>
<dbReference type="EnsemblPlants" id="TraesJAG7A03G03823080.1">
    <property type="protein sequence ID" value="TraesJAG7A03G03823080.1.CDS1"/>
    <property type="gene ID" value="TraesJAG7A03G03823080"/>
</dbReference>
<dbReference type="EnsemblPlants" id="TraesJAG7A03G03823330.1">
    <property type="protein sequence ID" value="TraesJAG7A03G03823330.1.CDS1"/>
    <property type="gene ID" value="TraesJAG7A03G03823330"/>
</dbReference>
<dbReference type="EnsemblPlants" id="TraesJAG7A03G03823360.1">
    <property type="protein sequence ID" value="TraesJAG7A03G03823360.1.CDS1"/>
    <property type="gene ID" value="TraesJAG7A03G03823360"/>
</dbReference>
<dbReference type="EnsemblPlants" id="TraesJAG7A03G03823410.1">
    <property type="protein sequence ID" value="TraesJAG7A03G03823410.1.CDS1"/>
    <property type="gene ID" value="TraesJAG7A03G03823410"/>
</dbReference>
<dbReference type="EnsemblPlants" id="TraesJAG7B03G04028980.1">
    <property type="protein sequence ID" value="TraesJAG7B03G04028980.1.CDS1"/>
    <property type="gene ID" value="TraesJAG7B03G04028980"/>
</dbReference>
<dbReference type="EnsemblPlants" id="TraesJAG7B03G04029440.1">
    <property type="protein sequence ID" value="TraesJAG7B03G04029440.1.CDS1"/>
    <property type="gene ID" value="TraesJAG7B03G04029440"/>
</dbReference>
<dbReference type="EnsemblPlants" id="TraesJAG7B03G04029510.1">
    <property type="protein sequence ID" value="TraesJAG7B03G04029510.1.CDS1"/>
    <property type="gene ID" value="TraesJAG7B03G04029510"/>
</dbReference>
<dbReference type="EnsemblPlants" id="TraesJAG7B03G04029830.1">
    <property type="protein sequence ID" value="TraesJAG7B03G04029830.1.CDS1"/>
    <property type="gene ID" value="TraesJAG7B03G04029830"/>
</dbReference>
<dbReference type="EnsemblPlants" id="TraesJAG7B03G04029930.1">
    <property type="protein sequence ID" value="TraesJAG7B03G04029930.1.CDS1"/>
    <property type="gene ID" value="TraesJAG7B03G04029930"/>
</dbReference>
<dbReference type="EnsemblPlants" id="TraesJAG7B03G04029970.1">
    <property type="protein sequence ID" value="TraesJAG7B03G04029970.1.CDS1"/>
    <property type="gene ID" value="TraesJAG7B03G04029970"/>
</dbReference>
<dbReference type="EnsemblPlants" id="TraesJAG7B03G04030060.1">
    <property type="protein sequence ID" value="TraesJAG7B03G04030060.1.CDS1"/>
    <property type="gene ID" value="TraesJAG7B03G04030060"/>
</dbReference>
<dbReference type="EnsemblPlants" id="TraesJAG7B03G04030560.1">
    <property type="protein sequence ID" value="TraesJAG7B03G04030560.1.CDS1"/>
    <property type="gene ID" value="TraesJAG7B03G04030560"/>
</dbReference>
<dbReference type="EnsemblPlants" id="TraesJAG7B03G04041340.1">
    <property type="protein sequence ID" value="TraesJAG7B03G04041340.1.CDS1"/>
    <property type="gene ID" value="TraesJAG7B03G04041340"/>
</dbReference>
<dbReference type="EnsemblPlants" id="TraesJAG7D03G04286840.1">
    <property type="protein sequence ID" value="TraesJAG7D03G04286840.1.CDS1"/>
    <property type="gene ID" value="TraesJAG7D03G04286840"/>
</dbReference>
<dbReference type="EnsemblPlants" id="TraesJAG7D03G04286880.1">
    <property type="protein sequence ID" value="TraesJAG7D03G04286880.1.CDS1"/>
    <property type="gene ID" value="TraesJAG7D03G04286880"/>
</dbReference>
<dbReference type="EnsemblPlants" id="TraesJAG7D03G04286990.1">
    <property type="protein sequence ID" value="TraesJAG7D03G04286990.1.CDS1"/>
    <property type="gene ID" value="TraesJAG7D03G04286990"/>
</dbReference>
<dbReference type="EnsemblPlants" id="TraesJAG7D03G04292720.1">
    <property type="protein sequence ID" value="TraesJAG7D03G04292720.1.CDS1"/>
    <property type="gene ID" value="TraesJAG7D03G04292720"/>
</dbReference>
<dbReference type="EnsemblPlants" id="TraesJAG7D03G04293020.1">
    <property type="protein sequence ID" value="TraesJAG7D03G04293020.1.CDS1"/>
    <property type="gene ID" value="TraesJAG7D03G04293020"/>
</dbReference>
<dbReference type="EnsemblPlants" id="TraesJAG7D03G04293050.1">
    <property type="protein sequence ID" value="TraesJAG7D03G04293050.1.CDS1"/>
    <property type="gene ID" value="TraesJAG7D03G04293050"/>
</dbReference>
<dbReference type="EnsemblPlants" id="TraesJAG7D03G04301940.1">
    <property type="protein sequence ID" value="TraesJAG7D03G04301940.1.CDS1"/>
    <property type="gene ID" value="TraesJAG7D03G04301940"/>
</dbReference>
<dbReference type="EnsemblPlants" id="TraesJAGUn03G04490190.1">
    <property type="protein sequence ID" value="TraesJAGUn03G04490190.1.CDS1"/>
    <property type="gene ID" value="TraesJAGUn03G04490190"/>
</dbReference>
<dbReference type="EnsemblPlants" id="TraesJAGUn03G04490620.1">
    <property type="protein sequence ID" value="TraesJAGUn03G04490620.1.CDS1"/>
    <property type="gene ID" value="TraesJAGUn03G04490620"/>
</dbReference>
<dbReference type="EnsemblPlants" id="TraesJAGUn03G04573170.1">
    <property type="protein sequence ID" value="TraesJAGUn03G04573170.1.CDS1"/>
    <property type="gene ID" value="TraesJAGUn03G04573170"/>
</dbReference>
<dbReference type="EnsemblPlants" id="TraesJUL1A03G00106550.1">
    <property type="protein sequence ID" value="TraesJUL1A03G00106550.1.CDS1"/>
    <property type="gene ID" value="TraesJUL1A03G00106550"/>
</dbReference>
<dbReference type="EnsemblPlants" id="TraesJUL1A03G00119480.1">
    <property type="protein sequence ID" value="TraesJUL1A03G00119480.1.CDS1"/>
    <property type="gene ID" value="TraesJUL1A03G00119480"/>
</dbReference>
<dbReference type="EnsemblPlants" id="TraesJUL1A03G00123470.1">
    <property type="protein sequence ID" value="TraesJUL1A03G00123470.1.CDS1"/>
    <property type="gene ID" value="TraesJUL1A03G00123470"/>
</dbReference>
<dbReference type="EnsemblPlants" id="TraesJUL1A03G00153020.1">
    <property type="protein sequence ID" value="TraesJUL1A03G00153020.1.CDS1"/>
    <property type="gene ID" value="TraesJUL1A03G00153020"/>
</dbReference>
<dbReference type="EnsemblPlants" id="TraesJUL1A03G00153130.1">
    <property type="protein sequence ID" value="TraesJUL1A03G00153130.1.CDS1"/>
    <property type="gene ID" value="TraesJUL1A03G00153130"/>
</dbReference>
<dbReference type="EnsemblPlants" id="TraesJUL1A03G00153550.1">
    <property type="protein sequence ID" value="TraesJUL1A03G00153550.1.CDS1"/>
    <property type="gene ID" value="TraesJUL1A03G00153550"/>
</dbReference>
<dbReference type="EnsemblPlants" id="TraesJUL1B03G00308300.1">
    <property type="protein sequence ID" value="TraesJUL1B03G00308300.1.CDS1"/>
    <property type="gene ID" value="TraesJUL1B03G00308300"/>
</dbReference>
<dbReference type="EnsemblPlants" id="TraesJUL1B03G00308330.1">
    <property type="protein sequence ID" value="TraesJUL1B03G00308330.1.CDS1"/>
    <property type="gene ID" value="TraesJUL1B03G00308330"/>
</dbReference>
<dbReference type="EnsemblPlants" id="TraesJUL1B03G00324880.1">
    <property type="protein sequence ID" value="TraesJUL1B03G00324880.1.CDS1"/>
    <property type="gene ID" value="TraesJUL1B03G00324880"/>
</dbReference>
<dbReference type="EnsemblPlants" id="TraesJUL1B03G00366300.1">
    <property type="protein sequence ID" value="TraesJUL1B03G00366300.1.CDS1"/>
    <property type="gene ID" value="TraesJUL1B03G00366300"/>
</dbReference>
<dbReference type="EnsemblPlants" id="TraesJUL1B03G00366950.1">
    <property type="protein sequence ID" value="TraesJUL1B03G00366950.1.CDS1"/>
    <property type="gene ID" value="TraesJUL1B03G00366950"/>
</dbReference>
<dbReference type="EnsemblPlants" id="TraesJUL1B03G00367090.1">
    <property type="protein sequence ID" value="TraesJUL1B03G00367090.1.CDS1"/>
    <property type="gene ID" value="TraesJUL1B03G00367090"/>
</dbReference>
<dbReference type="EnsemblPlants" id="TraesJUL1B03G00367140.1">
    <property type="protein sequence ID" value="TraesJUL1B03G00367140.1.CDS1"/>
    <property type="gene ID" value="TraesJUL1B03G00367140"/>
</dbReference>
<dbReference type="EnsemblPlants" id="TraesJUL1D03G00505660.1">
    <property type="protein sequence ID" value="TraesJUL1D03G00505660.1.CDS1"/>
    <property type="gene ID" value="TraesJUL1D03G00505660"/>
</dbReference>
<dbReference type="EnsemblPlants" id="TraesJUL1D03G00505700.1">
    <property type="protein sequence ID" value="TraesJUL1D03G00505700.1.CDS1"/>
    <property type="gene ID" value="TraesJUL1D03G00505700"/>
</dbReference>
<dbReference type="EnsemblPlants" id="TraesJUL1D03G00515720.1">
    <property type="protein sequence ID" value="TraesJUL1D03G00515720.1.CDS1"/>
    <property type="gene ID" value="TraesJUL1D03G00515720"/>
</dbReference>
<dbReference type="EnsemblPlants" id="TraesJUL1D03G00520520.1">
    <property type="protein sequence ID" value="TraesJUL1D03G00520520.1.CDS1"/>
    <property type="gene ID" value="TraesJUL1D03G00520520"/>
</dbReference>
<dbReference type="EnsemblPlants" id="TraesJUL1D03G00551610.1">
    <property type="protein sequence ID" value="TraesJUL1D03G00551610.1.CDS1"/>
    <property type="gene ID" value="TraesJUL1D03G00551610"/>
</dbReference>
<dbReference type="EnsemblPlants" id="TraesJUL1D03G00551610.2">
    <property type="protein sequence ID" value="TraesJUL1D03G00551610.2.CDS1"/>
    <property type="gene ID" value="TraesJUL1D03G00551610"/>
</dbReference>
<dbReference type="EnsemblPlants" id="TraesJUL1D03G00551680.1">
    <property type="protein sequence ID" value="TraesJUL1D03G00551680.1.CDS1"/>
    <property type="gene ID" value="TraesJUL1D03G00551680"/>
</dbReference>
<dbReference type="EnsemblPlants" id="TraesJUL1D03G00552200.1">
    <property type="protein sequence ID" value="TraesJUL1D03G00552200.1.CDS1"/>
    <property type="gene ID" value="TraesJUL1D03G00552200"/>
</dbReference>
<dbReference type="EnsemblPlants" id="TraesJUL1D03G00552280.1">
    <property type="protein sequence ID" value="TraesJUL1D03G00552280.1.CDS1"/>
    <property type="gene ID" value="TraesJUL1D03G00552280"/>
</dbReference>
<dbReference type="EnsemblPlants" id="TraesJUL2A03G00722320.1">
    <property type="protein sequence ID" value="TraesJUL2A03G00722320.1.CDS1"/>
    <property type="gene ID" value="TraesJUL2A03G00722320"/>
</dbReference>
<dbReference type="EnsemblPlants" id="TraesJUL2A03G00751620.1">
    <property type="protein sequence ID" value="TraesJUL2A03G00751620.1.CDS1"/>
    <property type="gene ID" value="TraesJUL2A03G00751620"/>
</dbReference>
<dbReference type="EnsemblPlants" id="TraesJUL2B03G00894080.1">
    <property type="protein sequence ID" value="TraesJUL2B03G00894080.1.CDS1"/>
    <property type="gene ID" value="TraesJUL2B03G00894080"/>
</dbReference>
<dbReference type="EnsemblPlants" id="TraesJUL2D03G01208560.1">
    <property type="protein sequence ID" value="TraesJUL2D03G01208560.1.CDS1"/>
    <property type="gene ID" value="TraesJUL2D03G01208560"/>
</dbReference>
<dbReference type="EnsemblPlants" id="TraesJUL3A03G01368010.1">
    <property type="protein sequence ID" value="TraesJUL3A03G01368010.1.CDS1"/>
    <property type="gene ID" value="TraesJUL3A03G01368010"/>
</dbReference>
<dbReference type="EnsemblPlants" id="TraesJUL3A03G01481040.1">
    <property type="protein sequence ID" value="TraesJUL3A03G01481040.1.CDS1"/>
    <property type="gene ID" value="TraesJUL3A03G01481040"/>
</dbReference>
<dbReference type="EnsemblPlants" id="TraesJUL3B03G01612200.1">
    <property type="protein sequence ID" value="TraesJUL3B03G01612200.1.CDS1"/>
    <property type="gene ID" value="TraesJUL3B03G01612200"/>
</dbReference>
<dbReference type="EnsemblPlants" id="TraesJUL3B03G01684790.1">
    <property type="protein sequence ID" value="TraesJUL3B03G01684790.1.CDS1"/>
    <property type="gene ID" value="TraesJUL3B03G01684790"/>
</dbReference>
<dbReference type="EnsemblPlants" id="TraesJUL3D03G01863440.1">
    <property type="protein sequence ID" value="TraesJUL3D03G01863440.1.CDS1"/>
    <property type="gene ID" value="TraesJUL3D03G01863440"/>
</dbReference>
<dbReference type="EnsemblPlants" id="TraesJUL3D03G01961070.1">
    <property type="protein sequence ID" value="TraesJUL3D03G01961070.1.CDS1"/>
    <property type="gene ID" value="TraesJUL3D03G01961070"/>
</dbReference>
<dbReference type="EnsemblPlants" id="TraesJUL4A03G02032470.1">
    <property type="protein sequence ID" value="TraesJUL4A03G02032470.1.CDS1"/>
    <property type="gene ID" value="TraesJUL4A03G02032470"/>
</dbReference>
<dbReference type="EnsemblPlants" id="TraesJUL4A03G02041810.1">
    <property type="protein sequence ID" value="TraesJUL4A03G02041810.1.CDS1"/>
    <property type="gene ID" value="TraesJUL4A03G02041810"/>
</dbReference>
<dbReference type="EnsemblPlants" id="TraesJUL4A03G02196870.1">
    <property type="protein sequence ID" value="TraesJUL4A03G02196870.1.CDS1"/>
    <property type="gene ID" value="TraesJUL4A03G02196870"/>
</dbReference>
<dbReference type="EnsemblPlants" id="TraesJUL4A03G02196930.1">
    <property type="protein sequence ID" value="TraesJUL4A03G02196930.1.CDS1"/>
    <property type="gene ID" value="TraesJUL4A03G02196930"/>
</dbReference>
<dbReference type="EnsemblPlants" id="TraesJUL4D03G02544660.1">
    <property type="protein sequence ID" value="TraesJUL4D03G02544660.1.CDS1"/>
    <property type="gene ID" value="TraesJUL4D03G02544660"/>
</dbReference>
<dbReference type="EnsemblPlants" id="TraesJUL4D03G02554400.1">
    <property type="protein sequence ID" value="TraesJUL4D03G02554400.1.CDS1"/>
    <property type="gene ID" value="TraesJUL4D03G02554400"/>
</dbReference>
<dbReference type="EnsemblPlants" id="TraesJUL5B03G02904960.1">
    <property type="protein sequence ID" value="TraesJUL5B03G02904960.1.CDS1"/>
    <property type="gene ID" value="TraesJUL5B03G02904960"/>
</dbReference>
<dbReference type="EnsemblPlants" id="TraesJUL5B03G02904960.2">
    <property type="protein sequence ID" value="TraesJUL5B03G02904960.2.CDS1"/>
    <property type="gene ID" value="TraesJUL5B03G02904960"/>
</dbReference>
<dbReference type="EnsemblPlants" id="TraesJUL5D03G03137930.1">
    <property type="protein sequence ID" value="TraesJUL5D03G03137930.1.CDS1"/>
    <property type="gene ID" value="TraesJUL5D03G03137930"/>
</dbReference>
<dbReference type="EnsemblPlants" id="TraesJUL6A03G03280270.1">
    <property type="protein sequence ID" value="TraesJUL6A03G03280270.1.CDS1"/>
    <property type="gene ID" value="TraesJUL6A03G03280270"/>
</dbReference>
<dbReference type="EnsemblPlants" id="TraesJUL6A03G03280850.1">
    <property type="protein sequence ID" value="TraesJUL6A03G03280850.1.CDS1"/>
    <property type="gene ID" value="TraesJUL6A03G03280850"/>
</dbReference>
<dbReference type="EnsemblPlants" id="TraesJUL6A03G03294410.1">
    <property type="protein sequence ID" value="TraesJUL6A03G03294410.1.CDS1"/>
    <property type="gene ID" value="TraesJUL6A03G03294410"/>
</dbReference>
<dbReference type="EnsemblPlants" id="TraesJUL6A03G03319100.1">
    <property type="protein sequence ID" value="TraesJUL6A03G03319100.1.CDS1"/>
    <property type="gene ID" value="TraesJUL6A03G03319100"/>
</dbReference>
<dbReference type="EnsemblPlants" id="TraesJUL6B03G03473860.1">
    <property type="protein sequence ID" value="TraesJUL6B03G03473860.1.CDS1"/>
    <property type="gene ID" value="TraesJUL6B03G03473860"/>
</dbReference>
<dbReference type="EnsemblPlants" id="TraesJUL6B03G03474080.1">
    <property type="protein sequence ID" value="TraesJUL6B03G03474080.1.CDS1"/>
    <property type="gene ID" value="TraesJUL6B03G03474080"/>
</dbReference>
<dbReference type="EnsemblPlants" id="TraesJUL6B03G03475010.1">
    <property type="protein sequence ID" value="TraesJUL6B03G03475010.1.CDS1"/>
    <property type="gene ID" value="TraesJUL6B03G03475010"/>
</dbReference>
<dbReference type="EnsemblPlants" id="TraesJUL6D03G03694060.1">
    <property type="protein sequence ID" value="TraesJUL6D03G03694060.1.CDS1"/>
    <property type="gene ID" value="TraesJUL6D03G03694060"/>
</dbReference>
<dbReference type="EnsemblPlants" id="TraesJUL6D03G03694490.1">
    <property type="protein sequence ID" value="TraesJUL6D03G03694490.1.CDS1"/>
    <property type="gene ID" value="TraesJUL6D03G03694490"/>
</dbReference>
<dbReference type="EnsemblPlants" id="TraesJUL6D03G03703520.1">
    <property type="protein sequence ID" value="TraesJUL6D03G03703520.1.CDS1"/>
    <property type="gene ID" value="TraesJUL6D03G03703520"/>
</dbReference>
<dbReference type="EnsemblPlants" id="TraesJUL6D03G03725900.1">
    <property type="protein sequence ID" value="TraesJUL6D03G03725900.1.CDS1"/>
    <property type="gene ID" value="TraesJUL6D03G03725900"/>
</dbReference>
<dbReference type="EnsemblPlants" id="TraesJUL7A03G03870530.1">
    <property type="protein sequence ID" value="TraesJUL7A03G03870530.1.CDS1"/>
    <property type="gene ID" value="TraesJUL7A03G03870530"/>
</dbReference>
<dbReference type="EnsemblPlants" id="TraesJUL7A03G03870830.1">
    <property type="protein sequence ID" value="TraesJUL7A03G03870830.1.CDS1"/>
    <property type="gene ID" value="TraesJUL7A03G03870830"/>
</dbReference>
<dbReference type="EnsemblPlants" id="TraesJUL7A03G03870830.2">
    <property type="protein sequence ID" value="TraesJUL7A03G03870830.2.CDS1"/>
    <property type="gene ID" value="TraesJUL7A03G03870830"/>
</dbReference>
<dbReference type="EnsemblPlants" id="TraesJUL7A03G03876060.1">
    <property type="protein sequence ID" value="TraesJUL7A03G03876060.1.CDS1"/>
    <property type="gene ID" value="TraesJUL7A03G03876060"/>
</dbReference>
<dbReference type="EnsemblPlants" id="TraesJUL7A03G03876290.1">
    <property type="protein sequence ID" value="TraesJUL7A03G03876290.1.CDS1"/>
    <property type="gene ID" value="TraesJUL7A03G03876290"/>
</dbReference>
<dbReference type="EnsemblPlants" id="TraesJUL7A03G03876340.1">
    <property type="protein sequence ID" value="TraesJUL7A03G03876340.1.CDS1"/>
    <property type="gene ID" value="TraesJUL7A03G03876340"/>
</dbReference>
<dbReference type="EnsemblPlants" id="TraesJUL7A03G03876380.1">
    <property type="protein sequence ID" value="TraesJUL7A03G03876380.1.CDS1"/>
    <property type="gene ID" value="TraesJUL7A03G03876380"/>
</dbReference>
<dbReference type="EnsemblPlants" id="TraesJUL7B03G04084310.1">
    <property type="protein sequence ID" value="TraesJUL7B03G04084310.1.CDS1"/>
    <property type="gene ID" value="TraesJUL7B03G04084310"/>
</dbReference>
<dbReference type="EnsemblPlants" id="TraesJUL7B03G04084740.1">
    <property type="protein sequence ID" value="TraesJUL7B03G04084740.1.CDS1"/>
    <property type="gene ID" value="TraesJUL7B03G04084740"/>
</dbReference>
<dbReference type="EnsemblPlants" id="TraesJUL7B03G04084870.1">
    <property type="protein sequence ID" value="TraesJUL7B03G04084870.1.CDS1"/>
    <property type="gene ID" value="TraesJUL7B03G04084870"/>
</dbReference>
<dbReference type="EnsemblPlants" id="TraesJUL7B03G04084890.1">
    <property type="protein sequence ID" value="TraesJUL7B03G04084890.1.CDS1"/>
    <property type="gene ID" value="TraesJUL7B03G04084890"/>
</dbReference>
<dbReference type="EnsemblPlants" id="TraesJUL7B03G04084970.1">
    <property type="protein sequence ID" value="TraesJUL7B03G04084970.1.CDS1"/>
    <property type="gene ID" value="TraesJUL7B03G04084970"/>
</dbReference>
<dbReference type="EnsemblPlants" id="TraesJUL7B03G04085460.1">
    <property type="protein sequence ID" value="TraesJUL7B03G04085460.1.CDS1"/>
    <property type="gene ID" value="TraesJUL7B03G04085460"/>
</dbReference>
<dbReference type="EnsemblPlants" id="TraesJUL7D03G04347130.1">
    <property type="protein sequence ID" value="TraesJUL7D03G04347130.1.CDS1"/>
    <property type="gene ID" value="TraesJUL7D03G04347130"/>
</dbReference>
<dbReference type="EnsemblPlants" id="TraesJUL7D03G04347250.1">
    <property type="protein sequence ID" value="TraesJUL7D03G04347250.1.CDS1"/>
    <property type="gene ID" value="TraesJUL7D03G04347250"/>
</dbReference>
<dbReference type="EnsemblPlants" id="TraesJUL7D03G04353110.1">
    <property type="protein sequence ID" value="TraesJUL7D03G04353110.1.CDS1"/>
    <property type="gene ID" value="TraesJUL7D03G04353110"/>
</dbReference>
<dbReference type="EnsemblPlants" id="TraesJUL7D03G04353420.1">
    <property type="protein sequence ID" value="TraesJUL7D03G04353420.1.CDS1"/>
    <property type="gene ID" value="TraesJUL7D03G04353420"/>
</dbReference>
<dbReference type="EnsemblPlants" id="TraesJUL7D03G04353460.1">
    <property type="protein sequence ID" value="TraesJUL7D03G04353460.1.CDS1"/>
    <property type="gene ID" value="TraesJUL7D03G04353460"/>
</dbReference>
<dbReference type="EnsemblPlants" id="TraesJUL7D03G04362420.1">
    <property type="protein sequence ID" value="TraesJUL7D03G04362420.1.CDS1"/>
    <property type="gene ID" value="TraesJUL7D03G04362420"/>
</dbReference>
<dbReference type="EnsemblPlants" id="TraesKAR1A01G0253010.1">
    <property type="protein sequence ID" value="cds.TraesKAR1A01G0253010.1"/>
    <property type="gene ID" value="TraesKAR1A01G0253010"/>
</dbReference>
<dbReference type="EnsemblPlants" id="TraesKAR1A01G0286250.1">
    <property type="protein sequence ID" value="cds.TraesKAR1A01G0286250.1"/>
    <property type="gene ID" value="TraesKAR1A01G0286250"/>
</dbReference>
<dbReference type="EnsemblPlants" id="TraesKAR1A01G0293740.1">
    <property type="protein sequence ID" value="cds.TraesKAR1A01G0293740.1"/>
    <property type="gene ID" value="TraesKAR1A01G0293740"/>
</dbReference>
<dbReference type="EnsemblPlants" id="TraesKAR1A01G0341550.1">
    <property type="protein sequence ID" value="cds.TraesKAR1A01G0341550.1"/>
    <property type="gene ID" value="TraesKAR1A01G0341550"/>
</dbReference>
<dbReference type="EnsemblPlants" id="TraesKAR1A01G0341700.1">
    <property type="protein sequence ID" value="cds.TraesKAR1A01G0341700.1"/>
    <property type="gene ID" value="TraesKAR1A01G0341700"/>
</dbReference>
<dbReference type="EnsemblPlants" id="TraesKAR1A01G0342430.1">
    <property type="protein sequence ID" value="cds.TraesKAR1A01G0342430.1"/>
    <property type="gene ID" value="TraesKAR1A01G0342430"/>
</dbReference>
<dbReference type="EnsemblPlants" id="TraesKAR1B01G0286580.1">
    <property type="protein sequence ID" value="cds.TraesKAR1B01G0286580.1"/>
    <property type="gene ID" value="TraesKAR1B01G0286580"/>
</dbReference>
<dbReference type="EnsemblPlants" id="TraesKAR1B01G0286600.1">
    <property type="protein sequence ID" value="cds.TraesKAR1B01G0286600.1"/>
    <property type="gene ID" value="TraesKAR1B01G0286600"/>
</dbReference>
<dbReference type="EnsemblPlants" id="TraesKAR1B01G0323490.1">
    <property type="protein sequence ID" value="cds.TraesKAR1B01G0323490.1"/>
    <property type="gene ID" value="TraesKAR1B01G0323490"/>
</dbReference>
<dbReference type="EnsemblPlants" id="TraesKAR1B01G0398910.1">
    <property type="protein sequence ID" value="cds.TraesKAR1B01G0398910.1"/>
    <property type="gene ID" value="TraesKAR1B01G0398910"/>
</dbReference>
<dbReference type="EnsemblPlants" id="TraesKAR1B01G0398910.2">
    <property type="protein sequence ID" value="cds.TraesKAR1B01G0398910.2"/>
    <property type="gene ID" value="TraesKAR1B01G0398910"/>
</dbReference>
<dbReference type="EnsemblPlants" id="TraesKAR1B01G0399850.1">
    <property type="protein sequence ID" value="cds.TraesKAR1B01G0399850.1"/>
    <property type="gene ID" value="TraesKAR1B01G0399850"/>
</dbReference>
<dbReference type="EnsemblPlants" id="TraesKAR1B01G0401340.1">
    <property type="protein sequence ID" value="cds.TraesKAR1B01G0401340.1"/>
    <property type="gene ID" value="TraesKAR1B01G0401340"/>
</dbReference>
<dbReference type="EnsemblPlants" id="TraesKAR1B01G0401600.1">
    <property type="protein sequence ID" value="cds.TraesKAR1B01G0401600.1"/>
    <property type="gene ID" value="TraesKAR1B01G0401600"/>
</dbReference>
<dbReference type="EnsemblPlants" id="TraesKAR1B01G0401760.1">
    <property type="protein sequence ID" value="cds.TraesKAR1B01G0401760.1"/>
    <property type="gene ID" value="TraesKAR1B01G0401760"/>
</dbReference>
<dbReference type="EnsemblPlants" id="TraesKAR1D01G0231950.1">
    <property type="protein sequence ID" value="cds.TraesKAR1D01G0231950.1"/>
    <property type="gene ID" value="TraesKAR1D01G0231950"/>
</dbReference>
<dbReference type="EnsemblPlants" id="TraesKAR1D01G0232020.1">
    <property type="protein sequence ID" value="cds.TraesKAR1D01G0232020.1"/>
    <property type="gene ID" value="TraesKAR1D01G0232020"/>
</dbReference>
<dbReference type="EnsemblPlants" id="TraesKAR1D01G0256670.1">
    <property type="protein sequence ID" value="cds.TraesKAR1D01G0256670.1"/>
    <property type="gene ID" value="TraesKAR1D01G0256670"/>
</dbReference>
<dbReference type="EnsemblPlants" id="TraesKAR1D01G0266980.1">
    <property type="protein sequence ID" value="cds.TraesKAR1D01G0266980.1"/>
    <property type="gene ID" value="TraesKAR1D01G0266980"/>
</dbReference>
<dbReference type="EnsemblPlants" id="TraesKAR1D01G0321400.1">
    <property type="protein sequence ID" value="cds.TraesKAR1D01G0321400.1"/>
    <property type="gene ID" value="TraesKAR1D01G0321400"/>
</dbReference>
<dbReference type="EnsemblPlants" id="TraesKAR1D01G0321500.1">
    <property type="protein sequence ID" value="cds.TraesKAR1D01G0321500.1"/>
    <property type="gene ID" value="TraesKAR1D01G0321500"/>
</dbReference>
<dbReference type="EnsemblPlants" id="TraesKAR1D01G0322190.1">
    <property type="protein sequence ID" value="cds.TraesKAR1D01G0322190.1"/>
    <property type="gene ID" value="TraesKAR1D01G0322190"/>
</dbReference>
<dbReference type="EnsemblPlants" id="TraesKAR1D01G0322310.1">
    <property type="protein sequence ID" value="cds.TraesKAR1D01G0322310.1"/>
    <property type="gene ID" value="TraesKAR1D01G0322310"/>
</dbReference>
<dbReference type="EnsemblPlants" id="TraesKAR2A01G0390260.1">
    <property type="protein sequence ID" value="cds.TraesKAR2A01G0390260.1"/>
    <property type="gene ID" value="TraesKAR2A01G0390260"/>
</dbReference>
<dbReference type="EnsemblPlants" id="TraesKAR2B01G0304820.1">
    <property type="protein sequence ID" value="cds.TraesKAR2B01G0304820.1"/>
    <property type="gene ID" value="TraesKAR2B01G0304820"/>
</dbReference>
<dbReference type="EnsemblPlants" id="TraesKAR2D01G0275650.1">
    <property type="protein sequence ID" value="cds.TraesKAR2D01G0275650.1"/>
    <property type="gene ID" value="TraesKAR2D01G0275650"/>
</dbReference>
<dbReference type="EnsemblPlants" id="TraesKAR3A01G0081610.1">
    <property type="protein sequence ID" value="cds.TraesKAR3A01G0081610.1"/>
    <property type="gene ID" value="TraesKAR3A01G0081610"/>
</dbReference>
<dbReference type="EnsemblPlants" id="TraesKAR3B01G0121280.1">
    <property type="protein sequence ID" value="cds.TraesKAR3B01G0121280.1"/>
    <property type="gene ID" value="TraesKAR3B01G0121280"/>
</dbReference>
<dbReference type="EnsemblPlants" id="TraesKAR3B01G0326110.1">
    <property type="protein sequence ID" value="cds.TraesKAR3B01G0326110.1"/>
    <property type="gene ID" value="TraesKAR3B01G0326110"/>
</dbReference>
<dbReference type="EnsemblPlants" id="TraesKAR3D01G0090170.1">
    <property type="protein sequence ID" value="cds.TraesKAR3D01G0090170.1"/>
    <property type="gene ID" value="TraesKAR3D01G0090170"/>
</dbReference>
<dbReference type="EnsemblPlants" id="TraesKAR3D01G0350960.1">
    <property type="protein sequence ID" value="cds.TraesKAR3D01G0350960.1"/>
    <property type="gene ID" value="TraesKAR3D01G0350960"/>
</dbReference>
<dbReference type="EnsemblPlants" id="TraesKAR4A01G0015570.1">
    <property type="protein sequence ID" value="cds.TraesKAR4A01G0015570.1"/>
    <property type="gene ID" value="TraesKAR4A01G0015570"/>
</dbReference>
<dbReference type="EnsemblPlants" id="TraesKAR4A01G0031370.1">
    <property type="protein sequence ID" value="cds.TraesKAR4A01G0031370.1"/>
    <property type="gene ID" value="TraesKAR4A01G0031370"/>
</dbReference>
<dbReference type="EnsemblPlants" id="TraesKAR4A01G0408070.1">
    <property type="protein sequence ID" value="cds.TraesKAR4A01G0408070.1"/>
    <property type="gene ID" value="TraesKAR4A01G0408070"/>
</dbReference>
<dbReference type="EnsemblPlants" id="TraesKAR4A01G0408070.2">
    <property type="protein sequence ID" value="cds.TraesKAR4A01G0408070.2"/>
    <property type="gene ID" value="TraesKAR4A01G0408070"/>
</dbReference>
<dbReference type="EnsemblPlants" id="TraesKAR4A01G0408200.1">
    <property type="protein sequence ID" value="cds.TraesKAR4A01G0408200.1"/>
    <property type="gene ID" value="TraesKAR4A01G0408200"/>
</dbReference>
<dbReference type="EnsemblPlants" id="TraesKAR4B01G0372140.1">
    <property type="protein sequence ID" value="cds.TraesKAR4B01G0372140.1"/>
    <property type="gene ID" value="TraesKAR4B01G0372140"/>
</dbReference>
<dbReference type="EnsemblPlants" id="TraesKAR4D01G0298210.1">
    <property type="protein sequence ID" value="cds.TraesKAR4D01G0298210.1"/>
    <property type="gene ID" value="TraesKAR4D01G0298210"/>
</dbReference>
<dbReference type="EnsemblPlants" id="TraesKAR4D01G0320090.1">
    <property type="protein sequence ID" value="cds.TraesKAR4D01G0320090.1"/>
    <property type="gene ID" value="TraesKAR4D01G0320090"/>
</dbReference>
<dbReference type="EnsemblPlants" id="TraesKAR5B01G0221930.1">
    <property type="protein sequence ID" value="cds.TraesKAR5B01G0221930.1"/>
    <property type="gene ID" value="TraesKAR5B01G0221930"/>
</dbReference>
<dbReference type="EnsemblPlants" id="TraesKAR5D01G0215460.1">
    <property type="protein sequence ID" value="cds.TraesKAR5D01G0215460.1"/>
    <property type="gene ID" value="TraesKAR5D01G0215460"/>
</dbReference>
<dbReference type="EnsemblPlants" id="TraesKAR6A01G0024590.1">
    <property type="protein sequence ID" value="cds.TraesKAR6A01G0024590.1"/>
    <property type="gene ID" value="TraesKAR6A01G0024590"/>
</dbReference>
<dbReference type="EnsemblPlants" id="TraesKAR6A01G0046360.1">
    <property type="protein sequence ID" value="cds.TraesKAR6A01G0046360.1"/>
    <property type="gene ID" value="TraesKAR6A01G0046360"/>
</dbReference>
<dbReference type="EnsemblPlants" id="TraesKAR6A01G0094380.1">
    <property type="protein sequence ID" value="cds.TraesKAR6A01G0094380.1"/>
    <property type="gene ID" value="TraesKAR6A01G0094380"/>
</dbReference>
<dbReference type="EnsemblPlants" id="TraesKAR6B01G0043450.1">
    <property type="protein sequence ID" value="cds.TraesKAR6B01G0043450.1"/>
    <property type="gene ID" value="TraesKAR6B01G0043450"/>
</dbReference>
<dbReference type="EnsemblPlants" id="TraesKAR6B01G0043890.1">
    <property type="protein sequence ID" value="cds.TraesKAR6B01G0043890.1"/>
    <property type="gene ID" value="TraesKAR6B01G0043890"/>
</dbReference>
<dbReference type="EnsemblPlants" id="TraesKAR6B01G0045880.1">
    <property type="protein sequence ID" value="cds.TraesKAR6B01G0045880.1"/>
    <property type="gene ID" value="TraesKAR6B01G0045880"/>
</dbReference>
<dbReference type="EnsemblPlants" id="TraesKAR6D01G0028520.1">
    <property type="protein sequence ID" value="cds.TraesKAR6D01G0028520.1"/>
    <property type="gene ID" value="TraesKAR6D01G0028520"/>
</dbReference>
<dbReference type="EnsemblPlants" id="TraesKAR6D01G0029120.1">
    <property type="protein sequence ID" value="cds.TraesKAR6D01G0029120.1"/>
    <property type="gene ID" value="TraesKAR6D01G0029120"/>
</dbReference>
<dbReference type="EnsemblPlants" id="TraesKAR6D01G0056260.1">
    <property type="protein sequence ID" value="cds.TraesKAR6D01G0056260.1"/>
    <property type="gene ID" value="TraesKAR6D01G0056260"/>
</dbReference>
<dbReference type="EnsemblPlants" id="TraesKAR6D01G0098840.1">
    <property type="protein sequence ID" value="cds.TraesKAR6D01G0098840.1"/>
    <property type="gene ID" value="TraesKAR6D01G0098840"/>
</dbReference>
<dbReference type="EnsemblPlants" id="TraesKAR7A01G0047170.1">
    <property type="protein sequence ID" value="cds.TraesKAR7A01G0047170.1"/>
    <property type="gene ID" value="TraesKAR7A01G0047170"/>
</dbReference>
<dbReference type="EnsemblPlants" id="TraesKAR7A01G0047480.1">
    <property type="protein sequence ID" value="cds.TraesKAR7A01G0047480.1"/>
    <property type="gene ID" value="TraesKAR7A01G0047480"/>
</dbReference>
<dbReference type="EnsemblPlants" id="TraesKAR7A01G0055760.1">
    <property type="protein sequence ID" value="cds.TraesKAR7A01G0055760.1"/>
    <property type="gene ID" value="TraesKAR7A01G0055760"/>
</dbReference>
<dbReference type="EnsemblPlants" id="TraesKAR7A01G0056000.1">
    <property type="protein sequence ID" value="cds.TraesKAR7A01G0056000.1"/>
    <property type="gene ID" value="TraesKAR7A01G0056000"/>
</dbReference>
<dbReference type="EnsemblPlants" id="TraesKAR7A01G0056040.1">
    <property type="protein sequence ID" value="cds.TraesKAR7A01G0056040.1"/>
    <property type="gene ID" value="TraesKAR7A01G0056040"/>
</dbReference>
<dbReference type="EnsemblPlants" id="TraesKAR7A01G0056260.1">
    <property type="protein sequence ID" value="cds.TraesKAR7A01G0056260.1"/>
    <property type="gene ID" value="TraesKAR7A01G0056260"/>
</dbReference>
<dbReference type="EnsemblPlants" id="TraesKAR7B01G0010690.1">
    <property type="protein sequence ID" value="cds.TraesKAR7B01G0010690.1"/>
    <property type="gene ID" value="TraesKAR7B01G0010690"/>
</dbReference>
<dbReference type="EnsemblPlants" id="TraesKAR7B01G0011400.1">
    <property type="protein sequence ID" value="cds.TraesKAR7B01G0011400.1"/>
    <property type="gene ID" value="TraesKAR7B01G0011400"/>
</dbReference>
<dbReference type="EnsemblPlants" id="TraesKAR7B01G0011450.1">
    <property type="protein sequence ID" value="cds.TraesKAR7B01G0011450.1"/>
    <property type="gene ID" value="TraesKAR7B01G0011450"/>
</dbReference>
<dbReference type="EnsemblPlants" id="TraesKAR7B01G0012270.1">
    <property type="protein sequence ID" value="cds.TraesKAR7B01G0012270.1"/>
    <property type="gene ID" value="TraesKAR7B01G0012270"/>
</dbReference>
<dbReference type="EnsemblPlants" id="TraesKAR7B01G0012560.1">
    <property type="protein sequence ID" value="cds.TraesKAR7B01G0012560.1"/>
    <property type="gene ID" value="TraesKAR7B01G0012560"/>
</dbReference>
<dbReference type="EnsemblPlants" id="TraesKAR7B01G0012670.1">
    <property type="protein sequence ID" value="cds.TraesKAR7B01G0012670.1"/>
    <property type="gene ID" value="TraesKAR7B01G0012670"/>
</dbReference>
<dbReference type="EnsemblPlants" id="TraesKAR7B01G0013480.1">
    <property type="protein sequence ID" value="cds.TraesKAR7B01G0013480.1"/>
    <property type="gene ID" value="TraesKAR7B01G0013480"/>
</dbReference>
<dbReference type="EnsemblPlants" id="TraesKAR7D01G0045390.1">
    <property type="protein sequence ID" value="cds.TraesKAR7D01G0045390.1"/>
    <property type="gene ID" value="TraesKAR7D01G0045390"/>
</dbReference>
<dbReference type="EnsemblPlants" id="TraesKAR7D01G0054370.1">
    <property type="protein sequence ID" value="cds.TraesKAR7D01G0054370.1"/>
    <property type="gene ID" value="TraesKAR7D01G0054370"/>
</dbReference>
<dbReference type="EnsemblPlants" id="TraesKAR7D01G0055100.1">
    <property type="protein sequence ID" value="cds.TraesKAR7D01G0055100.1"/>
    <property type="gene ID" value="TraesKAR7D01G0055100"/>
</dbReference>
<dbReference type="EnsemblPlants" id="TraesKAR7D01G0055140.1">
    <property type="protein sequence ID" value="cds.TraesKAR7D01G0055140.1"/>
    <property type="gene ID" value="TraesKAR7D01G0055140"/>
</dbReference>
<dbReference type="EnsemblPlants" id="TraesKAR7D01G0069590.1">
    <property type="protein sequence ID" value="cds.TraesKAR7D01G0069590.1"/>
    <property type="gene ID" value="TraesKAR7D01G0069590"/>
</dbReference>
<dbReference type="EnsemblPlants" id="TraesLAC1A03G00109490.1">
    <property type="protein sequence ID" value="TraesLAC1A03G00109490.1.CDS1"/>
    <property type="gene ID" value="TraesLAC1A03G00109490"/>
</dbReference>
<dbReference type="EnsemblPlants" id="TraesLAC1A03G00122500.1">
    <property type="protein sequence ID" value="TraesLAC1A03G00122500.1.CDS1"/>
    <property type="gene ID" value="TraesLAC1A03G00122500"/>
</dbReference>
<dbReference type="EnsemblPlants" id="TraesLAC1A03G00126430.1">
    <property type="protein sequence ID" value="TraesLAC1A03G00126430.1.CDS1"/>
    <property type="gene ID" value="TraesLAC1A03G00126430"/>
</dbReference>
<dbReference type="EnsemblPlants" id="TraesLAC1A03G00155490.1">
    <property type="protein sequence ID" value="TraesLAC1A03G00155490.1.CDS1"/>
    <property type="gene ID" value="TraesLAC1A03G00155490"/>
</dbReference>
<dbReference type="EnsemblPlants" id="TraesLAC1A03G00155600.1">
    <property type="protein sequence ID" value="TraesLAC1A03G00155600.1.CDS1"/>
    <property type="gene ID" value="TraesLAC1A03G00155600"/>
</dbReference>
<dbReference type="EnsemblPlants" id="TraesLAC1A03G00156010.1">
    <property type="protein sequence ID" value="TraesLAC1A03G00156010.1.CDS1"/>
    <property type="gene ID" value="TraesLAC1A03G00156010"/>
</dbReference>
<dbReference type="EnsemblPlants" id="TraesLAC1B03G00311460.1">
    <property type="protein sequence ID" value="TraesLAC1B03G00311460.1.CDS1"/>
    <property type="gene ID" value="TraesLAC1B03G00311460"/>
</dbReference>
<dbReference type="EnsemblPlants" id="TraesLAC1B03G00311490.1">
    <property type="protein sequence ID" value="TraesLAC1B03G00311490.1.CDS1"/>
    <property type="gene ID" value="TraesLAC1B03G00311490"/>
</dbReference>
<dbReference type="EnsemblPlants" id="TraesLAC1B03G00327770.1">
    <property type="protein sequence ID" value="TraesLAC1B03G00327770.1.CDS1"/>
    <property type="gene ID" value="TraesLAC1B03G00327770"/>
</dbReference>
<dbReference type="EnsemblPlants" id="TraesLAC1B03G00368380.1">
    <property type="protein sequence ID" value="TraesLAC1B03G00368380.1.CDS1"/>
    <property type="gene ID" value="TraesLAC1B03G00368380"/>
</dbReference>
<dbReference type="EnsemblPlants" id="TraesLAC1B03G00368880.1">
    <property type="protein sequence ID" value="TraesLAC1B03G00368880.1.CDS1"/>
    <property type="gene ID" value="TraesLAC1B03G00368880"/>
</dbReference>
<dbReference type="EnsemblPlants" id="TraesLAC1B03G00369570.1">
    <property type="protein sequence ID" value="TraesLAC1B03G00369570.1.CDS1"/>
    <property type="gene ID" value="TraesLAC1B03G00369570"/>
</dbReference>
<dbReference type="EnsemblPlants" id="TraesLAC1B03G00369710.1">
    <property type="protein sequence ID" value="TraesLAC1B03G00369710.1.CDS1"/>
    <property type="gene ID" value="TraesLAC1B03G00369710"/>
</dbReference>
<dbReference type="EnsemblPlants" id="TraesLAC1B03G00369750.1">
    <property type="protein sequence ID" value="TraesLAC1B03G00369750.1.CDS1"/>
    <property type="gene ID" value="TraesLAC1B03G00369750"/>
</dbReference>
<dbReference type="EnsemblPlants" id="TraesLAC1D03G00505870.1">
    <property type="protein sequence ID" value="TraesLAC1D03G00505870.1.CDS1"/>
    <property type="gene ID" value="TraesLAC1D03G00505870"/>
</dbReference>
<dbReference type="EnsemblPlants" id="TraesLAC1D03G00505920.1">
    <property type="protein sequence ID" value="TraesLAC1D03G00505920.1.CDS1"/>
    <property type="gene ID" value="TraesLAC1D03G00505920"/>
</dbReference>
<dbReference type="EnsemblPlants" id="TraesLAC1D03G00516080.1">
    <property type="protein sequence ID" value="TraesLAC1D03G00516080.1.CDS1"/>
    <property type="gene ID" value="TraesLAC1D03G00516080"/>
</dbReference>
<dbReference type="EnsemblPlants" id="TraesLAC1D03G00520810.1">
    <property type="protein sequence ID" value="TraesLAC1D03G00520810.1.CDS1"/>
    <property type="gene ID" value="TraesLAC1D03G00520810"/>
</dbReference>
<dbReference type="EnsemblPlants" id="TraesLAC1D03G00552380.1">
    <property type="protein sequence ID" value="TraesLAC1D03G00552380.1.CDS1"/>
    <property type="gene ID" value="TraesLAC1D03G00552380"/>
</dbReference>
<dbReference type="EnsemblPlants" id="TraesLAC1D03G00552470.1">
    <property type="protein sequence ID" value="TraesLAC1D03G00552470.1.CDS1"/>
    <property type="gene ID" value="TraesLAC1D03G00552470"/>
</dbReference>
<dbReference type="EnsemblPlants" id="TraesLAC1D03G00552980.1">
    <property type="protein sequence ID" value="TraesLAC1D03G00552980.1.CDS1"/>
    <property type="gene ID" value="TraesLAC1D03G00552980"/>
</dbReference>
<dbReference type="EnsemblPlants" id="TraesLAC1D03G00553080.1">
    <property type="protein sequence ID" value="TraesLAC1D03G00553080.1.CDS1"/>
    <property type="gene ID" value="TraesLAC1D03G00553080"/>
</dbReference>
<dbReference type="EnsemblPlants" id="TraesLAC2A03G00750710.1">
    <property type="protein sequence ID" value="TraesLAC2A03G00750710.1.CDS1"/>
    <property type="gene ID" value="TraesLAC2A03G00750710"/>
</dbReference>
<dbReference type="EnsemblPlants" id="TraesLAC2B03G00878080.1">
    <property type="protein sequence ID" value="TraesLAC2B03G00878080.1.CDS1"/>
    <property type="gene ID" value="TraesLAC2B03G00878080"/>
</dbReference>
<dbReference type="EnsemblPlants" id="TraesLAC2D03G01153780.1">
    <property type="protein sequence ID" value="TraesLAC2D03G01153780.1.CDS1"/>
    <property type="gene ID" value="TraesLAC2D03G01153780"/>
</dbReference>
<dbReference type="EnsemblPlants" id="TraesLAC3A03G01300120.1">
    <property type="protein sequence ID" value="TraesLAC3A03G01300120.1.CDS1"/>
    <property type="gene ID" value="TraesLAC3A03G01300120"/>
</dbReference>
<dbReference type="EnsemblPlants" id="TraesLAC3A03G01412450.1">
    <property type="protein sequence ID" value="TraesLAC3A03G01412450.1.CDS1"/>
    <property type="gene ID" value="TraesLAC3A03G01412450"/>
</dbReference>
<dbReference type="EnsemblPlants" id="TraesLAC3B03G01541060.1">
    <property type="protein sequence ID" value="TraesLAC3B03G01541060.1.CDS1"/>
    <property type="gene ID" value="TraesLAC3B03G01541060"/>
</dbReference>
<dbReference type="EnsemblPlants" id="TraesLAC3B03G01614260.1">
    <property type="protein sequence ID" value="TraesLAC3B03G01614260.1.CDS1"/>
    <property type="gene ID" value="TraesLAC3B03G01614260"/>
</dbReference>
<dbReference type="EnsemblPlants" id="TraesLAC3D03G01787010.1">
    <property type="protein sequence ID" value="TraesLAC3D03G01787010.1.CDS1"/>
    <property type="gene ID" value="TraesLAC3D03G01787010"/>
</dbReference>
<dbReference type="EnsemblPlants" id="TraesLAC3D03G01884850.1">
    <property type="protein sequence ID" value="TraesLAC3D03G01884850.1.CDS1"/>
    <property type="gene ID" value="TraesLAC3D03G01884850"/>
</dbReference>
<dbReference type="EnsemblPlants" id="TraesLAC4A03G01967250.1">
    <property type="protein sequence ID" value="TraesLAC4A03G01967250.1.CDS1"/>
    <property type="gene ID" value="TraesLAC4A03G01967250"/>
</dbReference>
<dbReference type="EnsemblPlants" id="TraesLAC4A03G01976390.1">
    <property type="protein sequence ID" value="TraesLAC4A03G01976390.1.CDS1"/>
    <property type="gene ID" value="TraesLAC4A03G01976390"/>
</dbReference>
<dbReference type="EnsemblPlants" id="TraesLAC4A03G02129860.1">
    <property type="protein sequence ID" value="TraesLAC4A03G02129860.1.CDS1"/>
    <property type="gene ID" value="TraesLAC4A03G02129860"/>
</dbReference>
<dbReference type="EnsemblPlants" id="TraesLAC4A03G02129900.1">
    <property type="protein sequence ID" value="TraesLAC4A03G02129900.1.CDS1"/>
    <property type="gene ID" value="TraesLAC4A03G02129900"/>
</dbReference>
<dbReference type="EnsemblPlants" id="TraesLAC4B03G02319850.1">
    <property type="protein sequence ID" value="TraesLAC4B03G02319850.1.CDS1"/>
    <property type="gene ID" value="TraesLAC4B03G02319850"/>
</dbReference>
<dbReference type="EnsemblPlants" id="TraesLAC4D03G02479040.1">
    <property type="protein sequence ID" value="TraesLAC4D03G02479040.1.CDS1"/>
    <property type="gene ID" value="TraesLAC4D03G02479040"/>
</dbReference>
<dbReference type="EnsemblPlants" id="TraesLAC4D03G02488750.1">
    <property type="protein sequence ID" value="TraesLAC4D03G02488750.1.CDS1"/>
    <property type="gene ID" value="TraesLAC4D03G02488750"/>
</dbReference>
<dbReference type="EnsemblPlants" id="TraesLAC5B03G02837270.1">
    <property type="protein sequence ID" value="TraesLAC5B03G02837270.1.CDS1"/>
    <property type="gene ID" value="TraesLAC5B03G02837270"/>
</dbReference>
<dbReference type="EnsemblPlants" id="TraesLAC5B03G02837270.2">
    <property type="protein sequence ID" value="TraesLAC5B03G02837270.2.CDS1"/>
    <property type="gene ID" value="TraesLAC5B03G02837270"/>
</dbReference>
<dbReference type="EnsemblPlants" id="TraesLAC5D03G03068660.1">
    <property type="protein sequence ID" value="TraesLAC5D03G03068660.1.CDS1"/>
    <property type="gene ID" value="TraesLAC5D03G03068660"/>
</dbReference>
<dbReference type="EnsemblPlants" id="TraesLAC6A03G03208650.1">
    <property type="protein sequence ID" value="TraesLAC6A03G03208650.1.CDS1"/>
    <property type="gene ID" value="TraesLAC6A03G03208650"/>
</dbReference>
<dbReference type="EnsemblPlants" id="TraesLAC6A03G03222420.1">
    <property type="protein sequence ID" value="TraesLAC6A03G03222420.1.CDS1"/>
    <property type="gene ID" value="TraesLAC6A03G03222420"/>
</dbReference>
<dbReference type="EnsemblPlants" id="TraesLAC6A03G03247570.1">
    <property type="protein sequence ID" value="TraesLAC6A03G03247570.1.CDS1"/>
    <property type="gene ID" value="TraesLAC6A03G03247570"/>
</dbReference>
<dbReference type="EnsemblPlants" id="TraesLAC6B03G03401190.1">
    <property type="protein sequence ID" value="TraesLAC6B03G03401190.1.CDS1"/>
    <property type="gene ID" value="TraesLAC6B03G03401190"/>
</dbReference>
<dbReference type="EnsemblPlants" id="TraesLAC6B03G03401460.1">
    <property type="protein sequence ID" value="TraesLAC6B03G03401460.1.CDS1"/>
    <property type="gene ID" value="TraesLAC6B03G03401460"/>
</dbReference>
<dbReference type="EnsemblPlants" id="TraesLAC6B03G03402470.1">
    <property type="protein sequence ID" value="TraesLAC6B03G03402470.1.CDS1"/>
    <property type="gene ID" value="TraesLAC6B03G03402470"/>
</dbReference>
<dbReference type="EnsemblPlants" id="TraesLAC6D03G03620910.1">
    <property type="protein sequence ID" value="TraesLAC6D03G03620910.1.CDS1"/>
    <property type="gene ID" value="TraesLAC6D03G03620910"/>
</dbReference>
<dbReference type="EnsemblPlants" id="TraesLAC6D03G03643660.1">
    <property type="protein sequence ID" value="TraesLAC6D03G03643660.1.CDS1"/>
    <property type="gene ID" value="TraesLAC6D03G03643660"/>
</dbReference>
<dbReference type="EnsemblPlants" id="TraesLAC7A03G03786790.1">
    <property type="protein sequence ID" value="TraesLAC7A03G03786790.1.CDS1"/>
    <property type="gene ID" value="TraesLAC7A03G03786790"/>
</dbReference>
<dbReference type="EnsemblPlants" id="TraesLAC7A03G03787110.1">
    <property type="protein sequence ID" value="TraesLAC7A03G03787110.1.CDS1"/>
    <property type="gene ID" value="TraesLAC7A03G03787110"/>
</dbReference>
<dbReference type="EnsemblPlants" id="TraesLAC7A03G03791790.1">
    <property type="protein sequence ID" value="TraesLAC7A03G03791790.1.CDS1"/>
    <property type="gene ID" value="TraesLAC7A03G03791790"/>
</dbReference>
<dbReference type="EnsemblPlants" id="TraesLAC7A03G03791860.1">
    <property type="protein sequence ID" value="TraesLAC7A03G03791860.1.CDS1"/>
    <property type="gene ID" value="TraesLAC7A03G03791860"/>
</dbReference>
<dbReference type="EnsemblPlants" id="TraesLAC7A03G03792070.1">
    <property type="protein sequence ID" value="TraesLAC7A03G03792070.1.CDS1"/>
    <property type="gene ID" value="TraesLAC7A03G03792070"/>
</dbReference>
<dbReference type="EnsemblPlants" id="TraesLAC7A03G03793830.1">
    <property type="protein sequence ID" value="TraesLAC7A03G03793830.1.CDS1"/>
    <property type="gene ID" value="TraesLAC7A03G03793830"/>
</dbReference>
<dbReference type="EnsemblPlants" id="TraesLAC7B03G03998600.1">
    <property type="protein sequence ID" value="TraesLAC7B03G03998600.1.CDS1"/>
    <property type="gene ID" value="TraesLAC7B03G03998600"/>
</dbReference>
<dbReference type="EnsemblPlants" id="TraesLAC7B03G03999060.1">
    <property type="protein sequence ID" value="TraesLAC7B03G03999060.1.CDS1"/>
    <property type="gene ID" value="TraesLAC7B03G03999060"/>
</dbReference>
<dbReference type="EnsemblPlants" id="TraesLAC7B03G03999130.1">
    <property type="protein sequence ID" value="TraesLAC7B03G03999130.1.CDS1"/>
    <property type="gene ID" value="TraesLAC7B03G03999130"/>
</dbReference>
<dbReference type="EnsemblPlants" id="TraesLAC7B03G03999440.1">
    <property type="protein sequence ID" value="TraesLAC7B03G03999440.1.CDS1"/>
    <property type="gene ID" value="TraesLAC7B03G03999440"/>
</dbReference>
<dbReference type="EnsemblPlants" id="TraesLAC7B03G03999540.1">
    <property type="protein sequence ID" value="TraesLAC7B03G03999540.1.CDS1"/>
    <property type="gene ID" value="TraesLAC7B03G03999540"/>
</dbReference>
<dbReference type="EnsemblPlants" id="TraesLAC7B03G03999570.1">
    <property type="protein sequence ID" value="TraesLAC7B03G03999570.1.CDS1"/>
    <property type="gene ID" value="TraesLAC7B03G03999570"/>
</dbReference>
<dbReference type="EnsemblPlants" id="TraesLAC7B03G03999660.1">
    <property type="protein sequence ID" value="TraesLAC7B03G03999660.1.CDS1"/>
    <property type="gene ID" value="TraesLAC7B03G03999660"/>
</dbReference>
<dbReference type="EnsemblPlants" id="TraesLAC7B03G04000200.1">
    <property type="protein sequence ID" value="TraesLAC7B03G04000200.1.CDS1"/>
    <property type="gene ID" value="TraesLAC7B03G04000200"/>
</dbReference>
<dbReference type="EnsemblPlants" id="TraesLAC7B03G04011160.1">
    <property type="protein sequence ID" value="TraesLAC7B03G04011160.1.CDS1"/>
    <property type="gene ID" value="TraesLAC7B03G04011160"/>
</dbReference>
<dbReference type="EnsemblPlants" id="TraesLAC7D03G04250440.1">
    <property type="protein sequence ID" value="TraesLAC7D03G04250440.1.CDS1"/>
    <property type="gene ID" value="TraesLAC7D03G04250440"/>
</dbReference>
<dbReference type="EnsemblPlants" id="TraesLAC7D03G04250580.1">
    <property type="protein sequence ID" value="TraesLAC7D03G04250580.1.CDS1"/>
    <property type="gene ID" value="TraesLAC7D03G04250580"/>
</dbReference>
<dbReference type="EnsemblPlants" id="TraesLAC7D03G04256480.1">
    <property type="protein sequence ID" value="TraesLAC7D03G04256480.1.CDS1"/>
    <property type="gene ID" value="TraesLAC7D03G04256480"/>
</dbReference>
<dbReference type="EnsemblPlants" id="TraesLAC7D03G04256800.1">
    <property type="protein sequence ID" value="TraesLAC7D03G04256800.1.CDS1"/>
    <property type="gene ID" value="TraesLAC7D03G04256800"/>
</dbReference>
<dbReference type="EnsemblPlants" id="TraesLAC7D03G04256850.1">
    <property type="protein sequence ID" value="TraesLAC7D03G04256850.1.CDS1"/>
    <property type="gene ID" value="TraesLAC7D03G04256850"/>
</dbReference>
<dbReference type="EnsemblPlants" id="TraesLAC7D03G04265770.1">
    <property type="protein sequence ID" value="TraesLAC7D03G04265770.1.CDS1"/>
    <property type="gene ID" value="TraesLAC7D03G04265770"/>
</dbReference>
<dbReference type="EnsemblPlants" id="TraesLACUn03G04447720.1">
    <property type="protein sequence ID" value="TraesLACUn03G04447720.1.CDS1"/>
    <property type="gene ID" value="TraesLACUn03G04447720"/>
</dbReference>
<dbReference type="EnsemblPlants" id="TraesLACUn03G04448180.1">
    <property type="protein sequence ID" value="TraesLACUn03G04448180.1.CDS1"/>
    <property type="gene ID" value="TraesLACUn03G04448180"/>
</dbReference>
<dbReference type="EnsemblPlants" id="TraesLDM1A03G00107280.1">
    <property type="protein sequence ID" value="TraesLDM1A03G00107280.1.CDS1"/>
    <property type="gene ID" value="TraesLDM1A03G00107280"/>
</dbReference>
<dbReference type="EnsemblPlants" id="TraesLDM1A03G00120110.1">
    <property type="protein sequence ID" value="TraesLDM1A03G00120110.1.CDS1"/>
    <property type="gene ID" value="TraesLDM1A03G00120110"/>
</dbReference>
<dbReference type="EnsemblPlants" id="TraesLDM1A03G00124010.1">
    <property type="protein sequence ID" value="TraesLDM1A03G00124010.1.CDS1"/>
    <property type="gene ID" value="TraesLDM1A03G00124010"/>
</dbReference>
<dbReference type="EnsemblPlants" id="TraesLDM1A03G00152690.1">
    <property type="protein sequence ID" value="TraesLDM1A03G00152690.1.CDS1"/>
    <property type="gene ID" value="TraesLDM1A03G00152690"/>
</dbReference>
<dbReference type="EnsemblPlants" id="TraesLDM1A03G00152840.1">
    <property type="protein sequence ID" value="TraesLDM1A03G00152840.1.CDS1"/>
    <property type="gene ID" value="TraesLDM1A03G00152840"/>
</dbReference>
<dbReference type="EnsemblPlants" id="TraesLDM1A03G00153220.1">
    <property type="protein sequence ID" value="TraesLDM1A03G00153220.1.CDS1"/>
    <property type="gene ID" value="TraesLDM1A03G00153220"/>
</dbReference>
<dbReference type="EnsemblPlants" id="TraesLDM1B03G00308390.1">
    <property type="protein sequence ID" value="TraesLDM1B03G00308390.1.CDS1"/>
    <property type="gene ID" value="TraesLDM1B03G00308390"/>
</dbReference>
<dbReference type="EnsemblPlants" id="TraesLDM1B03G00308430.1">
    <property type="protein sequence ID" value="TraesLDM1B03G00308430.1.CDS1"/>
    <property type="gene ID" value="TraesLDM1B03G00308430"/>
</dbReference>
<dbReference type="EnsemblPlants" id="TraesLDM1B03G00325060.1">
    <property type="protein sequence ID" value="TraesLDM1B03G00325060.1.CDS1"/>
    <property type="gene ID" value="TraesLDM1B03G00325060"/>
</dbReference>
<dbReference type="EnsemblPlants" id="TraesLDM1B03G00365320.1">
    <property type="protein sequence ID" value="TraesLDM1B03G00365320.1.CDS1"/>
    <property type="gene ID" value="TraesLDM1B03G00365320"/>
</dbReference>
<dbReference type="EnsemblPlants" id="TraesLDM1B03G00365320.2">
    <property type="protein sequence ID" value="TraesLDM1B03G00365320.2.CDS1"/>
    <property type="gene ID" value="TraesLDM1B03G00365320"/>
</dbReference>
<dbReference type="EnsemblPlants" id="TraesLDM1B03G00365810.1">
    <property type="protein sequence ID" value="TraesLDM1B03G00365810.1.CDS1"/>
    <property type="gene ID" value="TraesLDM1B03G00365810"/>
</dbReference>
<dbReference type="EnsemblPlants" id="TraesLDM1B03G00366480.1">
    <property type="protein sequence ID" value="TraesLDM1B03G00366480.1.CDS1"/>
    <property type="gene ID" value="TraesLDM1B03G00366480"/>
</dbReference>
<dbReference type="EnsemblPlants" id="TraesLDM1B03G00366620.1">
    <property type="protein sequence ID" value="TraesLDM1B03G00366620.1.CDS1"/>
    <property type="gene ID" value="TraesLDM1B03G00366620"/>
</dbReference>
<dbReference type="EnsemblPlants" id="TraesLDM1B03G00366670.1">
    <property type="protein sequence ID" value="TraesLDM1B03G00366670.1.CDS1"/>
    <property type="gene ID" value="TraesLDM1B03G00366670"/>
</dbReference>
<dbReference type="EnsemblPlants" id="TraesLDM1D03G00505410.1">
    <property type="protein sequence ID" value="TraesLDM1D03G00505410.1.CDS1"/>
    <property type="gene ID" value="TraesLDM1D03G00505410"/>
</dbReference>
<dbReference type="EnsemblPlants" id="TraesLDM1D03G00505450.1">
    <property type="protein sequence ID" value="TraesLDM1D03G00505450.1.CDS1"/>
    <property type="gene ID" value="TraesLDM1D03G00505450"/>
</dbReference>
<dbReference type="EnsemblPlants" id="TraesLDM1D03G00515410.1">
    <property type="protein sequence ID" value="TraesLDM1D03G00515410.1.CDS1"/>
    <property type="gene ID" value="TraesLDM1D03G00515410"/>
</dbReference>
<dbReference type="EnsemblPlants" id="TraesLDM1D03G00520130.1">
    <property type="protein sequence ID" value="TraesLDM1D03G00520130.1.CDS1"/>
    <property type="gene ID" value="TraesLDM1D03G00520130"/>
</dbReference>
<dbReference type="EnsemblPlants" id="TraesLDM1D03G00551000.1">
    <property type="protein sequence ID" value="TraesLDM1D03G00551000.1.CDS1"/>
    <property type="gene ID" value="TraesLDM1D03G00551000"/>
</dbReference>
<dbReference type="EnsemblPlants" id="TraesLDM1D03G00551080.1">
    <property type="protein sequence ID" value="TraesLDM1D03G00551080.1.CDS1"/>
    <property type="gene ID" value="TraesLDM1D03G00551080"/>
</dbReference>
<dbReference type="EnsemblPlants" id="TraesLDM1D03G00551610.1">
    <property type="protein sequence ID" value="TraesLDM1D03G00551610.1.CDS1"/>
    <property type="gene ID" value="TraesLDM1D03G00551610"/>
</dbReference>
<dbReference type="EnsemblPlants" id="TraesLDM1D03G00551700.1">
    <property type="protein sequence ID" value="TraesLDM1D03G00551700.1.CDS1"/>
    <property type="gene ID" value="TraesLDM1D03G00551700"/>
</dbReference>
<dbReference type="EnsemblPlants" id="TraesLDM2A03G00749460.1">
    <property type="protein sequence ID" value="TraesLDM2A03G00749460.1.CDS1"/>
    <property type="gene ID" value="TraesLDM2A03G00749460"/>
</dbReference>
<dbReference type="EnsemblPlants" id="TraesLDM2B03G00961030.1">
    <property type="protein sequence ID" value="TraesLDM2B03G00961030.1.CDS1"/>
    <property type="gene ID" value="TraesLDM2B03G00961030"/>
</dbReference>
<dbReference type="EnsemblPlants" id="TraesLDM2D03G01203100.1">
    <property type="protein sequence ID" value="TraesLDM2D03G01203100.1.CDS1"/>
    <property type="gene ID" value="TraesLDM2D03G01203100"/>
</dbReference>
<dbReference type="EnsemblPlants" id="TraesLDM3A03G01358730.1">
    <property type="protein sequence ID" value="TraesLDM3A03G01358730.1.CDS1"/>
    <property type="gene ID" value="TraesLDM3A03G01358730"/>
</dbReference>
<dbReference type="EnsemblPlants" id="TraesLDM3A03G01469110.1">
    <property type="protein sequence ID" value="TraesLDM3A03G01469110.1.CDS1"/>
    <property type="gene ID" value="TraesLDM3A03G01469110"/>
</dbReference>
<dbReference type="EnsemblPlants" id="TraesLDM3B03G01599610.1">
    <property type="protein sequence ID" value="TraesLDM3B03G01599610.1.CDS1"/>
    <property type="gene ID" value="TraesLDM3B03G01599610"/>
</dbReference>
<dbReference type="EnsemblPlants" id="TraesLDM3B03G01671400.1">
    <property type="protein sequence ID" value="TraesLDM3B03G01671400.1.CDS1"/>
    <property type="gene ID" value="TraesLDM3B03G01671400"/>
</dbReference>
<dbReference type="EnsemblPlants" id="TraesLDM3D03G01844050.1">
    <property type="protein sequence ID" value="TraesLDM3D03G01844050.1.CDS1"/>
    <property type="gene ID" value="TraesLDM3D03G01844050"/>
</dbReference>
<dbReference type="EnsemblPlants" id="TraesLDM3D03G01935620.1">
    <property type="protein sequence ID" value="TraesLDM3D03G01935620.1.CDS1"/>
    <property type="gene ID" value="TraesLDM3D03G01935620"/>
</dbReference>
<dbReference type="EnsemblPlants" id="TraesLDM4A03G02012510.1">
    <property type="protein sequence ID" value="TraesLDM4A03G02012510.1.CDS1"/>
    <property type="gene ID" value="TraesLDM4A03G02012510"/>
</dbReference>
<dbReference type="EnsemblPlants" id="TraesLDM4A03G02021830.1">
    <property type="protein sequence ID" value="TraesLDM4A03G02021830.1.CDS1"/>
    <property type="gene ID" value="TraesLDM4A03G02021830"/>
</dbReference>
<dbReference type="EnsemblPlants" id="TraesLDM4A03G02175630.1">
    <property type="protein sequence ID" value="TraesLDM4A03G02175630.1.CDS1"/>
    <property type="gene ID" value="TraesLDM4A03G02175630"/>
</dbReference>
<dbReference type="EnsemblPlants" id="TraesLDM4A03G02175690.1">
    <property type="protein sequence ID" value="TraesLDM4A03G02175690.1.CDS1"/>
    <property type="gene ID" value="TraesLDM4A03G02175690"/>
</dbReference>
<dbReference type="EnsemblPlants" id="TraesLDM4B03G02367050.1">
    <property type="protein sequence ID" value="TraesLDM4B03G02367050.1.CDS1"/>
    <property type="gene ID" value="TraesLDM4B03G02367050"/>
</dbReference>
<dbReference type="EnsemblPlants" id="TraesLDM4D03G02527730.1">
    <property type="protein sequence ID" value="TraesLDM4D03G02527730.1.CDS1"/>
    <property type="gene ID" value="TraesLDM4D03G02527730"/>
</dbReference>
<dbReference type="EnsemblPlants" id="TraesLDM4D03G02537590.1">
    <property type="protein sequence ID" value="TraesLDM4D03G02537590.1.CDS1"/>
    <property type="gene ID" value="TraesLDM4D03G02537590"/>
</dbReference>
<dbReference type="EnsemblPlants" id="TraesLDM5B03G02886240.1">
    <property type="protein sequence ID" value="TraesLDM5B03G02886240.1.CDS1"/>
    <property type="gene ID" value="TraesLDM5B03G02886240"/>
</dbReference>
<dbReference type="EnsemblPlants" id="TraesLDM5D03G03117500.1">
    <property type="protein sequence ID" value="TraesLDM5D03G03117500.1.CDS1"/>
    <property type="gene ID" value="TraesLDM5D03G03117500"/>
</dbReference>
<dbReference type="EnsemblPlants" id="TraesLDM6A03G03257400.1">
    <property type="protein sequence ID" value="TraesLDM6A03G03257400.1.CDS1"/>
    <property type="gene ID" value="TraesLDM6A03G03257400"/>
</dbReference>
<dbReference type="EnsemblPlants" id="TraesLDM6A03G03258730.1">
    <property type="protein sequence ID" value="TraesLDM6A03G03258730.1.CDS1"/>
    <property type="gene ID" value="TraesLDM6A03G03258730"/>
</dbReference>
<dbReference type="EnsemblPlants" id="TraesLDM6A03G03271610.1">
    <property type="protein sequence ID" value="TraesLDM6A03G03271610.1.CDS1"/>
    <property type="gene ID" value="TraesLDM6A03G03271610"/>
</dbReference>
<dbReference type="EnsemblPlants" id="TraesLDM6A03G03296170.1">
    <property type="protein sequence ID" value="TraesLDM6A03G03296170.1.CDS1"/>
    <property type="gene ID" value="TraesLDM6A03G03296170"/>
</dbReference>
<dbReference type="EnsemblPlants" id="TraesLDM6B03G03451140.1">
    <property type="protein sequence ID" value="TraesLDM6B03G03451140.1.CDS1"/>
    <property type="gene ID" value="TraesLDM6B03G03451140"/>
</dbReference>
<dbReference type="EnsemblPlants" id="TraesLDM6B03G03451140.2">
    <property type="protein sequence ID" value="TraesLDM6B03G03451140.2.CDS1"/>
    <property type="gene ID" value="TraesLDM6B03G03451140"/>
</dbReference>
<dbReference type="EnsemblPlants" id="TraesLDM6B03G03451380.1">
    <property type="protein sequence ID" value="TraesLDM6B03G03451380.1.CDS1"/>
    <property type="gene ID" value="TraesLDM6B03G03451380"/>
</dbReference>
<dbReference type="EnsemblPlants" id="TraesLDM6B03G03452340.1">
    <property type="protein sequence ID" value="TraesLDM6B03G03452340.1.CDS1"/>
    <property type="gene ID" value="TraesLDM6B03G03452340"/>
</dbReference>
<dbReference type="EnsemblPlants" id="TraesLDM6D03G03664130.1">
    <property type="protein sequence ID" value="TraesLDM6D03G03664130.1.CDS1"/>
    <property type="gene ID" value="TraesLDM6D03G03664130"/>
</dbReference>
<dbReference type="EnsemblPlants" id="TraesLDM6D03G03674320.1">
    <property type="protein sequence ID" value="TraesLDM6D03G03674320.1.CDS1"/>
    <property type="gene ID" value="TraesLDM6D03G03674320"/>
</dbReference>
<dbReference type="EnsemblPlants" id="TraesLDM6D03G03696820.1">
    <property type="protein sequence ID" value="TraesLDM6D03G03696820.1.CDS1"/>
    <property type="gene ID" value="TraesLDM6D03G03696820"/>
</dbReference>
<dbReference type="EnsemblPlants" id="TraesLDM7A03G03841280.1">
    <property type="protein sequence ID" value="TraesLDM7A03G03841280.1.CDS1"/>
    <property type="gene ID" value="TraesLDM7A03G03841280"/>
</dbReference>
<dbReference type="EnsemblPlants" id="TraesLDM7A03G03841560.1">
    <property type="protein sequence ID" value="TraesLDM7A03G03841560.1.CDS1"/>
    <property type="gene ID" value="TraesLDM7A03G03841560"/>
</dbReference>
<dbReference type="EnsemblPlants" id="TraesLDM7A03G03847720.1">
    <property type="protein sequence ID" value="TraesLDM7A03G03847720.1.CDS1"/>
    <property type="gene ID" value="TraesLDM7A03G03847720"/>
</dbReference>
<dbReference type="EnsemblPlants" id="TraesLDM7A03G03847930.1">
    <property type="protein sequence ID" value="TraesLDM7A03G03847930.1.CDS1"/>
    <property type="gene ID" value="TraesLDM7A03G03847930"/>
</dbReference>
<dbReference type="EnsemblPlants" id="TraesLDM7A03G03848000.1">
    <property type="protein sequence ID" value="TraesLDM7A03G03848000.1.CDS1"/>
    <property type="gene ID" value="TraesLDM7A03G03848000"/>
</dbReference>
<dbReference type="EnsemblPlants" id="TraesLDM7A03G03848040.1">
    <property type="protein sequence ID" value="TraesLDM7A03G03848040.1.CDS1"/>
    <property type="gene ID" value="TraesLDM7A03G03848040"/>
</dbReference>
<dbReference type="EnsemblPlants" id="TraesLDM7B03G04049410.1">
    <property type="protein sequence ID" value="TraesLDM7B03G04049410.1.CDS1"/>
    <property type="gene ID" value="TraesLDM7B03G04049410"/>
</dbReference>
<dbReference type="EnsemblPlants" id="TraesLDM7B03G04049800.1">
    <property type="protein sequence ID" value="TraesLDM7B03G04049800.1.CDS1"/>
    <property type="gene ID" value="TraesLDM7B03G04049800"/>
</dbReference>
<dbReference type="EnsemblPlants" id="TraesLDM7B03G04049870.1">
    <property type="protein sequence ID" value="TraesLDM7B03G04049870.1.CDS1"/>
    <property type="gene ID" value="TraesLDM7B03G04049870"/>
</dbReference>
<dbReference type="EnsemblPlants" id="TraesLDM7B03G04050190.1">
    <property type="protein sequence ID" value="TraesLDM7B03G04050190.1.CDS1"/>
    <property type="gene ID" value="TraesLDM7B03G04050190"/>
</dbReference>
<dbReference type="EnsemblPlants" id="TraesLDM7B03G04050320.1">
    <property type="protein sequence ID" value="TraesLDM7B03G04050320.1.CDS1"/>
    <property type="gene ID" value="TraesLDM7B03G04050320"/>
</dbReference>
<dbReference type="EnsemblPlants" id="TraesLDM7B03G04050340.1">
    <property type="protein sequence ID" value="TraesLDM7B03G04050340.1.CDS1"/>
    <property type="gene ID" value="TraesLDM7B03G04050340"/>
</dbReference>
<dbReference type="EnsemblPlants" id="TraesLDM7B03G04050440.1">
    <property type="protein sequence ID" value="TraesLDM7B03G04050440.1.CDS1"/>
    <property type="gene ID" value="TraesLDM7B03G04050440"/>
</dbReference>
<dbReference type="EnsemblPlants" id="TraesLDM7B03G04050950.1">
    <property type="protein sequence ID" value="TraesLDM7B03G04050950.1.CDS1"/>
    <property type="gene ID" value="TraesLDM7B03G04050950"/>
</dbReference>
<dbReference type="EnsemblPlants" id="TraesLDM7D03G04309670.1">
    <property type="protein sequence ID" value="TraesLDM7D03G04309670.1.CDS1"/>
    <property type="gene ID" value="TraesLDM7D03G04309670"/>
</dbReference>
<dbReference type="EnsemblPlants" id="TraesLDM7D03G04309720.1">
    <property type="protein sequence ID" value="TraesLDM7D03G04309720.1.CDS1"/>
    <property type="gene ID" value="TraesLDM7D03G04309720"/>
</dbReference>
<dbReference type="EnsemblPlants" id="TraesLDM7D03G04309830.1">
    <property type="protein sequence ID" value="TraesLDM7D03G04309830.1.CDS1"/>
    <property type="gene ID" value="TraesLDM7D03G04309830"/>
</dbReference>
<dbReference type="EnsemblPlants" id="TraesLDM7D03G04315670.1">
    <property type="protein sequence ID" value="TraesLDM7D03G04315670.1.CDS1"/>
    <property type="gene ID" value="TraesLDM7D03G04315670"/>
</dbReference>
<dbReference type="EnsemblPlants" id="TraesLDM7D03G04315980.1">
    <property type="protein sequence ID" value="TraesLDM7D03G04315980.1.CDS1"/>
    <property type="gene ID" value="TraesLDM7D03G04315980"/>
</dbReference>
<dbReference type="EnsemblPlants" id="TraesLDM7D03G04316010.1">
    <property type="protein sequence ID" value="TraesLDM7D03G04316010.1.CDS1"/>
    <property type="gene ID" value="TraesLDM7D03G04316010"/>
</dbReference>
<dbReference type="EnsemblPlants" id="TraesLDM7D03G04325000.1">
    <property type="protein sequence ID" value="TraesLDM7D03G04325000.1.CDS1"/>
    <property type="gene ID" value="TraesLDM7D03G04325000"/>
</dbReference>
<dbReference type="EnsemblPlants" id="TraesLDMUn03G04512900.1">
    <property type="protein sequence ID" value="TraesLDMUn03G04512900.1.CDS1"/>
    <property type="gene ID" value="TraesLDMUn03G04512900"/>
</dbReference>
<dbReference type="EnsemblPlants" id="TraesMAC1A03G00108520.1">
    <property type="protein sequence ID" value="TraesMAC1A03G00108520.1.CDS1"/>
    <property type="gene ID" value="TraesMAC1A03G00108520"/>
</dbReference>
<dbReference type="EnsemblPlants" id="TraesMAC1A03G00121390.1">
    <property type="protein sequence ID" value="TraesMAC1A03G00121390.1.CDS1"/>
    <property type="gene ID" value="TraesMAC1A03G00121390"/>
</dbReference>
<dbReference type="EnsemblPlants" id="TraesMAC1A03G00125300.1">
    <property type="protein sequence ID" value="TraesMAC1A03G00125300.1.CDS1"/>
    <property type="gene ID" value="TraesMAC1A03G00125300"/>
</dbReference>
<dbReference type="EnsemblPlants" id="TraesMAC1A03G00154130.1">
    <property type="protein sequence ID" value="TraesMAC1A03G00154130.1.CDS1"/>
    <property type="gene ID" value="TraesMAC1A03G00154130"/>
</dbReference>
<dbReference type="EnsemblPlants" id="TraesMAC1A03G00154250.1">
    <property type="protein sequence ID" value="TraesMAC1A03G00154250.1.CDS1"/>
    <property type="gene ID" value="TraesMAC1A03G00154250"/>
</dbReference>
<dbReference type="EnsemblPlants" id="TraesMAC1A03G00154660.1">
    <property type="protein sequence ID" value="TraesMAC1A03G00154660.1.CDS1"/>
    <property type="gene ID" value="TraesMAC1A03G00154660"/>
</dbReference>
<dbReference type="EnsemblPlants" id="TraesMAC1B03G00310490.1">
    <property type="protein sequence ID" value="TraesMAC1B03G00310490.1.CDS1"/>
    <property type="gene ID" value="TraesMAC1B03G00310490"/>
</dbReference>
<dbReference type="EnsemblPlants" id="TraesMAC1B03G00310520.1">
    <property type="protein sequence ID" value="TraesMAC1B03G00310520.1.CDS1"/>
    <property type="gene ID" value="TraesMAC1B03G00310520"/>
</dbReference>
<dbReference type="EnsemblPlants" id="TraesMAC1B03G00326710.1">
    <property type="protein sequence ID" value="TraesMAC1B03G00326710.1.CDS1"/>
    <property type="gene ID" value="TraesMAC1B03G00326710"/>
</dbReference>
<dbReference type="EnsemblPlants" id="TraesMAC1B03G00366060.1">
    <property type="protein sequence ID" value="TraesMAC1B03G00366060.1.CDS1"/>
    <property type="gene ID" value="TraesMAC1B03G00366060"/>
</dbReference>
<dbReference type="EnsemblPlants" id="TraesMAC1B03G00366550.1">
    <property type="protein sequence ID" value="TraesMAC1B03G00366550.1.CDS1"/>
    <property type="gene ID" value="TraesMAC1B03G00366550"/>
</dbReference>
<dbReference type="EnsemblPlants" id="TraesMAC1B03G00367190.1">
    <property type="protein sequence ID" value="TraesMAC1B03G00367190.1.CDS1"/>
    <property type="gene ID" value="TraesMAC1B03G00367190"/>
</dbReference>
<dbReference type="EnsemblPlants" id="TraesMAC1B03G00367330.1">
    <property type="protein sequence ID" value="TraesMAC1B03G00367330.1.CDS1"/>
    <property type="gene ID" value="TraesMAC1B03G00367330"/>
</dbReference>
<dbReference type="EnsemblPlants" id="TraesMAC1B03G00367370.1">
    <property type="protein sequence ID" value="TraesMAC1B03G00367370.1.CDS1"/>
    <property type="gene ID" value="TraesMAC1B03G00367370"/>
</dbReference>
<dbReference type="EnsemblPlants" id="TraesMAC1B03G00367370.2">
    <property type="protein sequence ID" value="TraesMAC1B03G00367370.2.CDS1"/>
    <property type="gene ID" value="TraesMAC1B03G00367370"/>
</dbReference>
<dbReference type="EnsemblPlants" id="TraesMAC1D03G00501960.1">
    <property type="protein sequence ID" value="TraesMAC1D03G00501960.1.CDS1"/>
    <property type="gene ID" value="TraesMAC1D03G00501960"/>
</dbReference>
<dbReference type="EnsemblPlants" id="TraesMAC1D03G00512000.1">
    <property type="protein sequence ID" value="TraesMAC1D03G00512000.1.CDS1"/>
    <property type="gene ID" value="TraesMAC1D03G00512000"/>
</dbReference>
<dbReference type="EnsemblPlants" id="TraesMAC1D03G00516820.1">
    <property type="protein sequence ID" value="TraesMAC1D03G00516820.1.CDS1"/>
    <property type="gene ID" value="TraesMAC1D03G00516820"/>
</dbReference>
<dbReference type="EnsemblPlants" id="TraesMAC1D03G00548090.1">
    <property type="protein sequence ID" value="TraesMAC1D03G00548090.1.CDS1"/>
    <property type="gene ID" value="TraesMAC1D03G00548090"/>
</dbReference>
<dbReference type="EnsemblPlants" id="TraesMAC1D03G00548090.2">
    <property type="protein sequence ID" value="TraesMAC1D03G00548090.2.CDS1"/>
    <property type="gene ID" value="TraesMAC1D03G00548090"/>
</dbReference>
<dbReference type="EnsemblPlants" id="TraesMAC1D03G00548170.1">
    <property type="protein sequence ID" value="TraesMAC1D03G00548170.1.CDS1"/>
    <property type="gene ID" value="TraesMAC1D03G00548170"/>
</dbReference>
<dbReference type="EnsemblPlants" id="TraesMAC1D03G00548660.1">
    <property type="protein sequence ID" value="TraesMAC1D03G00548660.1.CDS1"/>
    <property type="gene ID" value="TraesMAC1D03G00548660"/>
</dbReference>
<dbReference type="EnsemblPlants" id="TraesMAC1D03G00548760.1">
    <property type="protein sequence ID" value="TraesMAC1D03G00548760.1.CDS1"/>
    <property type="gene ID" value="TraesMAC1D03G00548760"/>
</dbReference>
<dbReference type="EnsemblPlants" id="TraesMAC2A03G00745640.1">
    <property type="protein sequence ID" value="TraesMAC2A03G00745640.1.CDS1"/>
    <property type="gene ID" value="TraesMAC2A03G00745640"/>
</dbReference>
<dbReference type="EnsemblPlants" id="TraesMAC2B03G00958100.1">
    <property type="protein sequence ID" value="TraesMAC2B03G00958100.1"/>
    <property type="gene ID" value="TraesMAC2B03G00958100"/>
</dbReference>
<dbReference type="EnsemblPlants" id="TraesMAC2D03G01200260.1">
    <property type="protein sequence ID" value="TraesMAC2D03G01200260.1.CDS1"/>
    <property type="gene ID" value="TraesMAC2D03G01200260"/>
</dbReference>
<dbReference type="EnsemblPlants" id="TraesMAC3A03G01354580.1">
    <property type="protein sequence ID" value="TraesMAC3A03G01354580.1.CDS1"/>
    <property type="gene ID" value="TraesMAC3A03G01354580"/>
</dbReference>
<dbReference type="EnsemblPlants" id="TraesMAC3A03G01466760.1">
    <property type="protein sequence ID" value="TraesMAC3A03G01466760.1.CDS1"/>
    <property type="gene ID" value="TraesMAC3A03G01466760"/>
</dbReference>
<dbReference type="EnsemblPlants" id="TraesMAC3B03G01599030.1">
    <property type="protein sequence ID" value="TraesMAC3B03G01599030.1.CDS1"/>
    <property type="gene ID" value="TraesMAC3B03G01599030"/>
</dbReference>
<dbReference type="EnsemblPlants" id="TraesMAC3B03G01671590.1">
    <property type="protein sequence ID" value="TraesMAC3B03G01671590.1.CDS1"/>
    <property type="gene ID" value="TraesMAC3B03G01671590"/>
</dbReference>
<dbReference type="EnsemblPlants" id="TraesMAC3D03G01844090.1">
    <property type="protein sequence ID" value="TraesMAC3D03G01844090.1.CDS1"/>
    <property type="gene ID" value="TraesMAC3D03G01844090"/>
</dbReference>
<dbReference type="EnsemblPlants" id="TraesMAC3D03G01942040.1">
    <property type="protein sequence ID" value="TraesMAC3D03G01942040.1.CDS1"/>
    <property type="gene ID" value="TraesMAC3D03G01942040"/>
</dbReference>
<dbReference type="EnsemblPlants" id="TraesMAC4A03G02013100.1">
    <property type="protein sequence ID" value="TraesMAC4A03G02013100.1.CDS1"/>
    <property type="gene ID" value="TraesMAC4A03G02013100"/>
</dbReference>
<dbReference type="EnsemblPlants" id="TraesMAC4A03G02022370.1">
    <property type="protein sequence ID" value="TraesMAC4A03G02022370.1.CDS1"/>
    <property type="gene ID" value="TraesMAC4A03G02022370"/>
</dbReference>
<dbReference type="EnsemblPlants" id="TraesMAC4A03G02175810.1">
    <property type="protein sequence ID" value="TraesMAC4A03G02175810.1.CDS1"/>
    <property type="gene ID" value="TraesMAC4A03G02175810"/>
</dbReference>
<dbReference type="EnsemblPlants" id="TraesMAC4B03G02365840.1">
    <property type="protein sequence ID" value="TraesMAC4B03G02365840.1.CDS1"/>
    <property type="gene ID" value="TraesMAC4B03G02365840"/>
</dbReference>
<dbReference type="EnsemblPlants" id="TraesMAC4D03G02523410.1">
    <property type="protein sequence ID" value="TraesMAC4D03G02523410.1.CDS1"/>
    <property type="gene ID" value="TraesMAC4D03G02523410"/>
</dbReference>
<dbReference type="EnsemblPlants" id="TraesMAC4D03G02533280.1">
    <property type="protein sequence ID" value="TraesMAC4D03G02533280.1.CDS1"/>
    <property type="gene ID" value="TraesMAC4D03G02533280"/>
</dbReference>
<dbReference type="EnsemblPlants" id="TraesMAC5B03G02883090.1">
    <property type="protein sequence ID" value="TraesMAC5B03G02883090.1.CDS1"/>
    <property type="gene ID" value="TraesMAC5B03G02883090"/>
</dbReference>
<dbReference type="EnsemblPlants" id="TraesMAC5D03G03111580.1">
    <property type="protein sequence ID" value="TraesMAC5D03G03111580.1.CDS1"/>
    <property type="gene ID" value="TraesMAC5D03G03111580"/>
</dbReference>
<dbReference type="EnsemblPlants" id="TraesMAC6A03G03253100.1">
    <property type="protein sequence ID" value="TraesMAC6A03G03253100.1.CDS1"/>
    <property type="gene ID" value="TraesMAC6A03G03253100"/>
</dbReference>
<dbReference type="EnsemblPlants" id="TraesMAC6A03G03253620.1">
    <property type="protein sequence ID" value="TraesMAC6A03G03253620.1.CDS1"/>
    <property type="gene ID" value="TraesMAC6A03G03253620"/>
</dbReference>
<dbReference type="EnsemblPlants" id="TraesMAC6A03G03267720.1">
    <property type="protein sequence ID" value="TraesMAC6A03G03267720.1.CDS1"/>
    <property type="gene ID" value="TraesMAC6A03G03267720"/>
</dbReference>
<dbReference type="EnsemblPlants" id="TraesMAC6A03G03292240.1">
    <property type="protein sequence ID" value="TraesMAC6A03G03292240.1.CDS1"/>
    <property type="gene ID" value="TraesMAC6A03G03292240"/>
</dbReference>
<dbReference type="EnsemblPlants" id="TraesMAC6B03G03445880.1">
    <property type="protein sequence ID" value="TraesMAC6B03G03445880.1.CDS1"/>
    <property type="gene ID" value="TraesMAC6B03G03445880"/>
</dbReference>
<dbReference type="EnsemblPlants" id="TraesMAC6B03G03445880.2">
    <property type="protein sequence ID" value="TraesMAC6B03G03445880.2.CDS1"/>
    <property type="gene ID" value="TraesMAC6B03G03445880"/>
</dbReference>
<dbReference type="EnsemblPlants" id="TraesMAC6B03G03446160.1">
    <property type="protein sequence ID" value="TraesMAC6B03G03446160.1.CDS1"/>
    <property type="gene ID" value="TraesMAC6B03G03446160"/>
</dbReference>
<dbReference type="EnsemblPlants" id="TraesMAC6B03G03447130.1">
    <property type="protein sequence ID" value="TraesMAC6B03G03447130.1.CDS1"/>
    <property type="gene ID" value="TraesMAC6B03G03447130"/>
</dbReference>
<dbReference type="EnsemblPlants" id="TraesMAC6D03G03660050.1">
    <property type="protein sequence ID" value="TraesMAC6D03G03660050.1.CDS1"/>
    <property type="gene ID" value="TraesMAC6D03G03660050"/>
</dbReference>
<dbReference type="EnsemblPlants" id="TraesMAC6D03G03660490.1">
    <property type="protein sequence ID" value="TraesMAC6D03G03660490.1.CDS1"/>
    <property type="gene ID" value="TraesMAC6D03G03660490"/>
</dbReference>
<dbReference type="EnsemblPlants" id="TraesMAC6D03G03669130.1">
    <property type="protein sequence ID" value="TraesMAC6D03G03669130.1.CDS1"/>
    <property type="gene ID" value="TraesMAC6D03G03669130"/>
</dbReference>
<dbReference type="EnsemblPlants" id="TraesMAC6D03G03691660.1">
    <property type="protein sequence ID" value="TraesMAC6D03G03691660.1.CDS1"/>
    <property type="gene ID" value="TraesMAC6D03G03691660"/>
</dbReference>
<dbReference type="EnsemblPlants" id="TraesMAC7A03G03835660.1">
    <property type="protein sequence ID" value="TraesMAC7A03G03835660.1.CDS1"/>
    <property type="gene ID" value="TraesMAC7A03G03835660"/>
</dbReference>
<dbReference type="EnsemblPlants" id="TraesMAC7A03G03835950.1">
    <property type="protein sequence ID" value="TraesMAC7A03G03835950.1.CDS1"/>
    <property type="gene ID" value="TraesMAC7A03G03835950"/>
</dbReference>
<dbReference type="EnsemblPlants" id="TraesMAC7A03G03842340.1">
    <property type="protein sequence ID" value="TraesMAC7A03G03842340.1.CDS1"/>
    <property type="gene ID" value="TraesMAC7A03G03842340"/>
</dbReference>
<dbReference type="EnsemblPlants" id="TraesMAC7A03G03842570.1">
    <property type="protein sequence ID" value="TraesMAC7A03G03842570.1.CDS1"/>
    <property type="gene ID" value="TraesMAC7A03G03842570"/>
</dbReference>
<dbReference type="EnsemblPlants" id="TraesMAC7A03G03842630.1">
    <property type="protein sequence ID" value="TraesMAC7A03G03842630.1.CDS1"/>
    <property type="gene ID" value="TraesMAC7A03G03842630"/>
</dbReference>
<dbReference type="EnsemblPlants" id="TraesMAC7A03G03842990.1">
    <property type="protein sequence ID" value="TraesMAC7A03G03842990.1.CDS1"/>
    <property type="gene ID" value="TraesMAC7A03G03842990"/>
</dbReference>
<dbReference type="EnsemblPlants" id="TraesMAC7B03G04042060.1">
    <property type="protein sequence ID" value="TraesMAC7B03G04042060.1.CDS1"/>
    <property type="gene ID" value="TraesMAC7B03G04042060"/>
</dbReference>
<dbReference type="EnsemblPlants" id="TraesMAC7B03G04042440.1">
    <property type="protein sequence ID" value="TraesMAC7B03G04042440.1.CDS1"/>
    <property type="gene ID" value="TraesMAC7B03G04042440"/>
</dbReference>
<dbReference type="EnsemblPlants" id="TraesMAC7B03G04042530.1">
    <property type="protein sequence ID" value="TraesMAC7B03G04042530.1.CDS1"/>
    <property type="gene ID" value="TraesMAC7B03G04042530"/>
</dbReference>
<dbReference type="EnsemblPlants" id="TraesMAC7B03G04042570.1">
    <property type="protein sequence ID" value="TraesMAC7B03G04042570.1.CDS1"/>
    <property type="gene ID" value="TraesMAC7B03G04042570"/>
</dbReference>
<dbReference type="EnsemblPlants" id="TraesMAC7B03G04042650.1">
    <property type="protein sequence ID" value="TraesMAC7B03G04042650.1.CDS1"/>
    <property type="gene ID" value="TraesMAC7B03G04042650"/>
</dbReference>
<dbReference type="EnsemblPlants" id="TraesMAC7B03G04043360.1">
    <property type="protein sequence ID" value="TraesMAC7B03G04043360.1.CDS1"/>
    <property type="gene ID" value="TraesMAC7B03G04043360"/>
</dbReference>
<dbReference type="EnsemblPlants" id="TraesMAC7B03G04054000.1">
    <property type="protein sequence ID" value="TraesMAC7B03G04054000.1.CDS1"/>
    <property type="gene ID" value="TraesMAC7B03G04054000"/>
</dbReference>
<dbReference type="EnsemblPlants" id="TraesMAC7D03G04295940.1">
    <property type="protein sequence ID" value="TraesMAC7D03G04295940.1.CDS1"/>
    <property type="gene ID" value="TraesMAC7D03G04295940"/>
</dbReference>
<dbReference type="EnsemblPlants" id="TraesMAC7D03G04296060.1">
    <property type="protein sequence ID" value="TraesMAC7D03G04296060.1.CDS1"/>
    <property type="gene ID" value="TraesMAC7D03G04296060"/>
</dbReference>
<dbReference type="EnsemblPlants" id="TraesMAC7D03G04301900.1">
    <property type="protein sequence ID" value="TraesMAC7D03G04301900.1.CDS1"/>
    <property type="gene ID" value="TraesMAC7D03G04301900"/>
</dbReference>
<dbReference type="EnsemblPlants" id="TraesMAC7D03G04302210.1">
    <property type="protein sequence ID" value="TraesMAC7D03G04302210.1.CDS1"/>
    <property type="gene ID" value="TraesMAC7D03G04302210"/>
</dbReference>
<dbReference type="EnsemblPlants" id="TraesMAC7D03G04302260.1">
    <property type="protein sequence ID" value="TraesMAC7D03G04302260.1.CDS1"/>
    <property type="gene ID" value="TraesMAC7D03G04302260"/>
</dbReference>
<dbReference type="EnsemblPlants" id="TraesMAC7D03G04311280.1">
    <property type="protein sequence ID" value="TraesMAC7D03G04311280.1.CDS1"/>
    <property type="gene ID" value="TraesMAC7D03G04311280"/>
</dbReference>
<dbReference type="EnsemblPlants" id="TraesNOR1A03G00107990.1">
    <property type="protein sequence ID" value="TraesNOR1A03G00107990.1.CDS1"/>
    <property type="gene ID" value="TraesNOR1A03G00107990"/>
</dbReference>
<dbReference type="EnsemblPlants" id="TraesNOR1A03G00120870.1">
    <property type="protein sequence ID" value="TraesNOR1A03G00120870.1.CDS1"/>
    <property type="gene ID" value="TraesNOR1A03G00120870"/>
</dbReference>
<dbReference type="EnsemblPlants" id="TraesNOR1A03G00124590.1">
    <property type="protein sequence ID" value="TraesNOR1A03G00124590.1.CDS1"/>
    <property type="gene ID" value="TraesNOR1A03G00124590"/>
</dbReference>
<dbReference type="EnsemblPlants" id="TraesNOR1A03G00153890.1">
    <property type="protein sequence ID" value="TraesNOR1A03G00153890.1.CDS1"/>
    <property type="gene ID" value="TraesNOR1A03G00153890"/>
</dbReference>
<dbReference type="EnsemblPlants" id="TraesNOR1A03G00154000.1">
    <property type="protein sequence ID" value="TraesNOR1A03G00154000.1.CDS1"/>
    <property type="gene ID" value="TraesNOR1A03G00154000"/>
</dbReference>
<dbReference type="EnsemblPlants" id="TraesNOR1A03G00154410.1">
    <property type="protein sequence ID" value="TraesNOR1A03G00154410.1.CDS1"/>
    <property type="gene ID" value="TraesNOR1A03G00154410"/>
</dbReference>
<dbReference type="EnsemblPlants" id="TraesNOR1B03G00312650.1">
    <property type="protein sequence ID" value="TraesNOR1B03G00312650.1.CDS1"/>
    <property type="gene ID" value="TraesNOR1B03G00312650"/>
</dbReference>
<dbReference type="EnsemblPlants" id="TraesNOR1B03G00312690.1">
    <property type="protein sequence ID" value="TraesNOR1B03G00312690.1.CDS1"/>
    <property type="gene ID" value="TraesNOR1B03G00312690"/>
</dbReference>
<dbReference type="EnsemblPlants" id="TraesNOR1B03G00329020.1">
    <property type="protein sequence ID" value="TraesNOR1B03G00329020.1.CDS1"/>
    <property type="gene ID" value="TraesNOR1B03G00329020"/>
</dbReference>
<dbReference type="EnsemblPlants" id="TraesNOR1B03G00368960.1">
    <property type="protein sequence ID" value="TraesNOR1B03G00368960.1.CDS1"/>
    <property type="gene ID" value="TraesNOR1B03G00368960"/>
</dbReference>
<dbReference type="EnsemblPlants" id="TraesNOR1B03G00369470.1">
    <property type="protein sequence ID" value="TraesNOR1B03G00369470.1.CDS1"/>
    <property type="gene ID" value="TraesNOR1B03G00369470"/>
</dbReference>
<dbReference type="EnsemblPlants" id="TraesNOR1B03G00370150.1">
    <property type="protein sequence ID" value="TraesNOR1B03G00370150.1.CDS1"/>
    <property type="gene ID" value="TraesNOR1B03G00370150"/>
</dbReference>
<dbReference type="EnsemblPlants" id="TraesNOR1B03G00370280.1">
    <property type="protein sequence ID" value="TraesNOR1B03G00370280.1.CDS1"/>
    <property type="gene ID" value="TraesNOR1B03G00370280"/>
</dbReference>
<dbReference type="EnsemblPlants" id="TraesNOR1B03G00370340.1">
    <property type="protein sequence ID" value="TraesNOR1B03G00370340.1.CDS1"/>
    <property type="gene ID" value="TraesNOR1B03G00370340"/>
</dbReference>
<dbReference type="EnsemblPlants" id="TraesNOR1D03G00510610.1">
    <property type="protein sequence ID" value="TraesNOR1D03G00510610.1.CDS1"/>
    <property type="gene ID" value="TraesNOR1D03G00510610"/>
</dbReference>
<dbReference type="EnsemblPlants" id="TraesNOR1D03G00510650.1">
    <property type="protein sequence ID" value="TraesNOR1D03G00510650.1.CDS1"/>
    <property type="gene ID" value="TraesNOR1D03G00510650"/>
</dbReference>
<dbReference type="EnsemblPlants" id="TraesNOR1D03G00520850.1">
    <property type="protein sequence ID" value="TraesNOR1D03G00520850.1.CDS1"/>
    <property type="gene ID" value="TraesNOR1D03G00520850"/>
</dbReference>
<dbReference type="EnsemblPlants" id="TraesNOR1D03G00525590.1">
    <property type="protein sequence ID" value="TraesNOR1D03G00525590.1.CDS1"/>
    <property type="gene ID" value="TraesNOR1D03G00525590"/>
</dbReference>
<dbReference type="EnsemblPlants" id="TraesNOR1D03G00556710.1">
    <property type="protein sequence ID" value="TraesNOR1D03G00556710.1.CDS1"/>
    <property type="gene ID" value="TraesNOR1D03G00556710"/>
</dbReference>
<dbReference type="EnsemblPlants" id="TraesNOR1D03G00556800.1">
    <property type="protein sequence ID" value="TraesNOR1D03G00556800.1.CDS1"/>
    <property type="gene ID" value="TraesNOR1D03G00556800"/>
</dbReference>
<dbReference type="EnsemblPlants" id="TraesNOR1D03G00557310.1">
    <property type="protein sequence ID" value="TraesNOR1D03G00557310.1.CDS1"/>
    <property type="gene ID" value="TraesNOR1D03G00557310"/>
</dbReference>
<dbReference type="EnsemblPlants" id="TraesNOR1D03G00557390.1">
    <property type="protein sequence ID" value="TraesNOR1D03G00557390.1.CDS1"/>
    <property type="gene ID" value="TraesNOR1D03G00557390"/>
</dbReference>
<dbReference type="EnsemblPlants" id="TraesNOR2A03G00756630.1">
    <property type="protein sequence ID" value="TraesNOR2A03G00756630.1.CDS1"/>
    <property type="gene ID" value="TraesNOR2A03G00756630"/>
</dbReference>
<dbReference type="EnsemblPlants" id="TraesNOR2B03G00973950.1">
    <property type="protein sequence ID" value="TraesNOR2B03G00973950.1.CDS1"/>
    <property type="gene ID" value="TraesNOR2B03G00973950"/>
</dbReference>
<dbReference type="EnsemblPlants" id="TraesNOR2D03G01218590.1">
    <property type="protein sequence ID" value="TraesNOR2D03G01218590.1.CDS1"/>
    <property type="gene ID" value="TraesNOR2D03G01218590"/>
</dbReference>
<dbReference type="EnsemblPlants" id="TraesNOR3A03G01376410.1">
    <property type="protein sequence ID" value="TraesNOR3A03G01376410.1.CDS1"/>
    <property type="gene ID" value="TraesNOR3A03G01376410"/>
</dbReference>
<dbReference type="EnsemblPlants" id="TraesNOR3B03G01694420.1">
    <property type="protein sequence ID" value="TraesNOR3B03G01694420.1.CDS1"/>
    <property type="gene ID" value="TraesNOR3B03G01694420"/>
</dbReference>
<dbReference type="EnsemblPlants" id="TraesNOR3D03G01872710.1">
    <property type="protein sequence ID" value="TraesNOR3D03G01872710.1.CDS1"/>
    <property type="gene ID" value="TraesNOR3D03G01872710"/>
</dbReference>
<dbReference type="EnsemblPlants" id="TraesNOR3D03G01969650.1">
    <property type="protein sequence ID" value="TraesNOR3D03G01969650.1.CDS1"/>
    <property type="gene ID" value="TraesNOR3D03G01969650"/>
</dbReference>
<dbReference type="EnsemblPlants" id="TraesNOR4A03G02040570.1">
    <property type="protein sequence ID" value="TraesNOR4A03G02040570.1.CDS1"/>
    <property type="gene ID" value="TraesNOR4A03G02040570"/>
</dbReference>
<dbReference type="EnsemblPlants" id="TraesNOR4A03G02049690.1">
    <property type="protein sequence ID" value="TraesNOR4A03G02049690.1.CDS1"/>
    <property type="gene ID" value="TraesNOR4A03G02049690"/>
</dbReference>
<dbReference type="EnsemblPlants" id="TraesNOR4A03G02199110.1">
    <property type="protein sequence ID" value="TraesNOR4A03G02199110.1.CDS1"/>
    <property type="gene ID" value="TraesNOR4A03G02199110"/>
</dbReference>
<dbReference type="EnsemblPlants" id="TraesNOR4A03G02199150.1">
    <property type="protein sequence ID" value="TraesNOR4A03G02199150.1.CDS1"/>
    <property type="gene ID" value="TraesNOR4A03G02199150"/>
</dbReference>
<dbReference type="EnsemblPlants" id="TraesNOR4B03G02383860.1">
    <property type="protein sequence ID" value="TraesNOR4B03G02383860.1.CDS1"/>
    <property type="gene ID" value="TraesNOR4B03G02383860"/>
</dbReference>
<dbReference type="EnsemblPlants" id="TraesNOR4D03G02542620.1">
    <property type="protein sequence ID" value="TraesNOR4D03G02542620.1.CDS1"/>
    <property type="gene ID" value="TraesNOR4D03G02542620"/>
</dbReference>
<dbReference type="EnsemblPlants" id="TraesNOR4D03G02552540.1">
    <property type="protein sequence ID" value="TraesNOR4D03G02552540.1.CDS1"/>
    <property type="gene ID" value="TraesNOR4D03G02552540"/>
</dbReference>
<dbReference type="EnsemblPlants" id="TraesNOR5B03G02910470.1">
    <property type="protein sequence ID" value="TraesNOR5B03G02910470.1.CDS1"/>
    <property type="gene ID" value="TraesNOR5B03G02910470"/>
</dbReference>
<dbReference type="EnsemblPlants" id="TraesNOR5B03G02910470.2">
    <property type="protein sequence ID" value="TraesNOR5B03G02910470.2.CDS1"/>
    <property type="gene ID" value="TraesNOR5B03G02910470"/>
</dbReference>
<dbReference type="EnsemblPlants" id="TraesNOR5D03G03142490.1">
    <property type="protein sequence ID" value="TraesNOR5D03G03142490.1.CDS1"/>
    <property type="gene ID" value="TraesNOR5D03G03142490"/>
</dbReference>
<dbReference type="EnsemblPlants" id="TraesNOR5D03G03142490.2">
    <property type="protein sequence ID" value="TraesNOR5D03G03142490.2.CDS1"/>
    <property type="gene ID" value="TraesNOR5D03G03142490"/>
</dbReference>
<dbReference type="EnsemblPlants" id="TraesNOR6A03G03284540.1">
    <property type="protein sequence ID" value="TraesNOR6A03G03284540.1.CDS1"/>
    <property type="gene ID" value="TraesNOR6A03G03284540"/>
</dbReference>
<dbReference type="EnsemblPlants" id="TraesNOR6A03G03284970.1">
    <property type="protein sequence ID" value="TraesNOR6A03G03284970.1.CDS1"/>
    <property type="gene ID" value="TraesNOR6A03G03284970"/>
</dbReference>
<dbReference type="EnsemblPlants" id="TraesNOR6A03G03299440.1">
    <property type="protein sequence ID" value="TraesNOR6A03G03299440.1.CDS1"/>
    <property type="gene ID" value="TraesNOR6A03G03299440"/>
</dbReference>
<dbReference type="EnsemblPlants" id="TraesNOR6A03G03324410.1">
    <property type="protein sequence ID" value="TraesNOR6A03G03324410.1.CDS1"/>
    <property type="gene ID" value="TraesNOR6A03G03324410"/>
</dbReference>
<dbReference type="EnsemblPlants" id="TraesNOR6B03G03480040.1">
    <property type="protein sequence ID" value="TraesNOR6B03G03480040.1.CDS1"/>
    <property type="gene ID" value="TraesNOR6B03G03480040"/>
</dbReference>
<dbReference type="EnsemblPlants" id="TraesNOR6B03G03480260.1">
    <property type="protein sequence ID" value="TraesNOR6B03G03480260.1.CDS1"/>
    <property type="gene ID" value="TraesNOR6B03G03480260"/>
</dbReference>
<dbReference type="EnsemblPlants" id="TraesNOR6B03G03481300.1">
    <property type="protein sequence ID" value="TraesNOR6B03G03481300.1.CDS1"/>
    <property type="gene ID" value="TraesNOR6B03G03481300"/>
</dbReference>
<dbReference type="EnsemblPlants" id="TraesNOR6D03G03710950.1">
    <property type="protein sequence ID" value="TraesNOR6D03G03710950.1.CDS1"/>
    <property type="gene ID" value="TraesNOR6D03G03710950"/>
</dbReference>
<dbReference type="EnsemblPlants" id="TraesNOR6D03G03733620.1">
    <property type="protein sequence ID" value="TraesNOR6D03G03733620.1.CDS1"/>
    <property type="gene ID" value="TraesNOR6D03G03733620"/>
</dbReference>
<dbReference type="EnsemblPlants" id="TraesNOR7A03G03877540.1">
    <property type="protein sequence ID" value="TraesNOR7A03G03877540.1.CDS1"/>
    <property type="gene ID" value="TraesNOR7A03G03877540"/>
</dbReference>
<dbReference type="EnsemblPlants" id="TraesNOR7A03G03877850.1">
    <property type="protein sequence ID" value="TraesNOR7A03G03877850.1.CDS1"/>
    <property type="gene ID" value="TraesNOR7A03G03877850"/>
</dbReference>
<dbReference type="EnsemblPlants" id="TraesNOR7A03G03884080.1">
    <property type="protein sequence ID" value="TraesNOR7A03G03884080.1.CDS1"/>
    <property type="gene ID" value="TraesNOR7A03G03884080"/>
</dbReference>
<dbReference type="EnsemblPlants" id="TraesNOR7A03G03884280.1">
    <property type="protein sequence ID" value="TraesNOR7A03G03884280.1.CDS1"/>
    <property type="gene ID" value="TraesNOR7A03G03884280"/>
</dbReference>
<dbReference type="EnsemblPlants" id="TraesNOR7A03G03884340.1">
    <property type="protein sequence ID" value="TraesNOR7A03G03884340.1.CDS1"/>
    <property type="gene ID" value="TraesNOR7A03G03884340"/>
</dbReference>
<dbReference type="EnsemblPlants" id="TraesNOR7A03G03884390.1">
    <property type="protein sequence ID" value="TraesNOR7A03G03884390.1.CDS1"/>
    <property type="gene ID" value="TraesNOR7A03G03884390"/>
</dbReference>
<dbReference type="EnsemblPlants" id="TraesNOR7B03G04090560.1">
    <property type="protein sequence ID" value="TraesNOR7B03G04090560.1.CDS1"/>
    <property type="gene ID" value="TraesNOR7B03G04090560"/>
</dbReference>
<dbReference type="EnsemblPlants" id="TraesNOR7B03G04090970.1">
    <property type="protein sequence ID" value="TraesNOR7B03G04090970.1.CDS1"/>
    <property type="gene ID" value="TraesNOR7B03G04090970"/>
</dbReference>
<dbReference type="EnsemblPlants" id="TraesNOR7B03G04091030.1">
    <property type="protein sequence ID" value="TraesNOR7B03G04091030.1.CDS1"/>
    <property type="gene ID" value="TraesNOR7B03G04091030"/>
</dbReference>
<dbReference type="EnsemblPlants" id="TraesNOR7B03G04091350.1">
    <property type="protein sequence ID" value="TraesNOR7B03G04091350.1.CDS1"/>
    <property type="gene ID" value="TraesNOR7B03G04091350"/>
</dbReference>
<dbReference type="EnsemblPlants" id="TraesNOR7B03G04091530.1">
    <property type="protein sequence ID" value="TraesNOR7B03G04091530.1.CDS1"/>
    <property type="gene ID" value="TraesNOR7B03G04091530"/>
</dbReference>
<dbReference type="EnsemblPlants" id="TraesNOR7B03G04091620.1">
    <property type="protein sequence ID" value="TraesNOR7B03G04091620.1.CDS1"/>
    <property type="gene ID" value="TraesNOR7B03G04091620"/>
</dbReference>
<dbReference type="EnsemblPlants" id="TraesNOR7B03G04092340.1">
    <property type="protein sequence ID" value="TraesNOR7B03G04092340.1.CDS1"/>
    <property type="gene ID" value="TraesNOR7B03G04092340"/>
</dbReference>
<dbReference type="EnsemblPlants" id="TraesNOR7B03G04103450.1">
    <property type="protein sequence ID" value="TraesNOR7B03G04103450.1.CDS1"/>
    <property type="gene ID" value="TraesNOR7B03G04103450"/>
</dbReference>
<dbReference type="EnsemblPlants" id="TraesNOR7D03G04352110.1">
    <property type="protein sequence ID" value="TraesNOR7D03G04352110.1.CDS1"/>
    <property type="gene ID" value="TraesNOR7D03G04352110"/>
</dbReference>
<dbReference type="EnsemblPlants" id="TraesNOR7D03G04352230.1">
    <property type="protein sequence ID" value="TraesNOR7D03G04352230.1.CDS1"/>
    <property type="gene ID" value="TraesNOR7D03G04352230"/>
</dbReference>
<dbReference type="EnsemblPlants" id="TraesNOR7D03G04358110.1">
    <property type="protein sequence ID" value="TraesNOR7D03G04358110.1.CDS1"/>
    <property type="gene ID" value="TraesNOR7D03G04358110"/>
</dbReference>
<dbReference type="EnsemblPlants" id="TraesNOR7D03G04358400.1">
    <property type="protein sequence ID" value="TraesNOR7D03G04358400.1.CDS1"/>
    <property type="gene ID" value="TraesNOR7D03G04358400"/>
</dbReference>
<dbReference type="EnsemblPlants" id="TraesNOR7D03G04358430.1">
    <property type="protein sequence ID" value="TraesNOR7D03G04358430.1.CDS1"/>
    <property type="gene ID" value="TraesNOR7D03G04358430"/>
</dbReference>
<dbReference type="EnsemblPlants" id="TraesNOR7D03G04367640.1">
    <property type="protein sequence ID" value="TraesNOR7D03G04367640.1.CDS1"/>
    <property type="gene ID" value="TraesNOR7D03G04367640"/>
</dbReference>
<dbReference type="EnsemblPlants" id="TraesNORUn03G04600280.1">
    <property type="protein sequence ID" value="TraesNORUn03G04600280.1.CDS1"/>
    <property type="gene ID" value="TraesNORUn03G04600280"/>
</dbReference>
<dbReference type="EnsemblPlants" id="TraesNORUn03G04623530.1">
    <property type="protein sequence ID" value="TraesNORUn03G04623530.1.CDS1"/>
    <property type="gene ID" value="TraesNORUn03G04623530"/>
</dbReference>
<dbReference type="EnsemblPlants" id="TraesNORUn03G04711210.1">
    <property type="protein sequence ID" value="TraesNORUn03G04711210.1.CDS1"/>
    <property type="gene ID" value="TraesNORUn03G04711210"/>
</dbReference>
<dbReference type="EnsemblPlants" id="TraesNORUn03G04758700.1">
    <property type="protein sequence ID" value="TraesNORUn03G04758700.1.CDS1"/>
    <property type="gene ID" value="TraesNORUn03G04758700"/>
</dbReference>
<dbReference type="EnsemblPlants" id="TraesPARA_EIv1.0_0019230.1">
    <property type="protein sequence ID" value="TraesPARA_EIv1.0_0019230.1.CDS1"/>
    <property type="gene ID" value="TraesPARA_EIv1.0_0019230"/>
</dbReference>
<dbReference type="EnsemblPlants" id="TraesPARA_EIv1.0_0019430.1">
    <property type="protein sequence ID" value="TraesPARA_EIv1.0_0019430.1.CDS1"/>
    <property type="gene ID" value="TraesPARA_EIv1.0_0019430"/>
</dbReference>
<dbReference type="EnsemblPlants" id="TraesPARA_EIv1.0_0019510.1">
    <property type="protein sequence ID" value="TraesPARA_EIv1.0_0019510.1.CDS1"/>
    <property type="gene ID" value="TraesPARA_EIv1.0_0019510"/>
</dbReference>
<dbReference type="EnsemblPlants" id="TraesPARA_EIv1.0_0037280.1">
    <property type="protein sequence ID" value="TraesPARA_EIv1.0_0037280.1.CDS1"/>
    <property type="gene ID" value="TraesPARA_EIv1.0_0037280"/>
</dbReference>
<dbReference type="EnsemblPlants" id="TraesPARA_EIv1.0_0039470.1">
    <property type="protein sequence ID" value="TraesPARA_EIv1.0_0039470.1.CDS1"/>
    <property type="gene ID" value="TraesPARA_EIv1.0_0039470"/>
</dbReference>
<dbReference type="EnsemblPlants" id="TraesPARA_EIv1.0_0046330.1">
    <property type="protein sequence ID" value="TraesPARA_EIv1.0_0046330.1.CDS1"/>
    <property type="gene ID" value="TraesPARA_EIv1.0_0046330"/>
</dbReference>
<dbReference type="EnsemblPlants" id="TraesPARA_EIv1.0_0170230.1">
    <property type="protein sequence ID" value="TraesPARA_EIv1.0_0170230.1.CDS1"/>
    <property type="gene ID" value="TraesPARA_EIv1.0_0170230"/>
</dbReference>
<dbReference type="EnsemblPlants" id="TraesPARA_EIv1.0_0170260.1">
    <property type="protein sequence ID" value="TraesPARA_EIv1.0_0170260.1.CDS1"/>
    <property type="gene ID" value="TraesPARA_EIv1.0_0170260"/>
</dbReference>
<dbReference type="EnsemblPlants" id="TraesPARA_EIv1.0_0178880.1">
    <property type="protein sequence ID" value="TraesPARA_EIv1.0_0178880.1.CDS1"/>
    <property type="gene ID" value="TraesPARA_EIv1.0_0178880"/>
</dbReference>
<dbReference type="EnsemblPlants" id="TraesPARA_EIv1.0_0201580.1">
    <property type="protein sequence ID" value="TraesPARA_EIv1.0_0201580.1.CDS1"/>
    <property type="gene ID" value="TraesPARA_EIv1.0_0201580"/>
</dbReference>
<dbReference type="EnsemblPlants" id="TraesPARA_EIv1.0_0202210.1">
    <property type="protein sequence ID" value="TraesPARA_EIv1.0_0202210.1.CDS1"/>
    <property type="gene ID" value="TraesPARA_EIv1.0_0202210"/>
</dbReference>
<dbReference type="EnsemblPlants" id="TraesPARA_EIv1.0_0202260.1">
    <property type="protein sequence ID" value="TraesPARA_EIv1.0_0202260.1.CDS1"/>
    <property type="gene ID" value="TraesPARA_EIv1.0_0202260"/>
</dbReference>
<dbReference type="EnsemblPlants" id="TraesPARA_EIv1.0_0202300.1">
    <property type="protein sequence ID" value="TraesPARA_EIv1.0_0202300.1.CDS1"/>
    <property type="gene ID" value="TraesPARA_EIv1.0_0202300"/>
</dbReference>
<dbReference type="EnsemblPlants" id="TraesPARA_EIv1.0_0202300.2">
    <property type="protein sequence ID" value="TraesPARA_EIv1.0_0202300.2.CDS1"/>
    <property type="gene ID" value="TraesPARA_EIv1.0_0202300"/>
</dbReference>
<dbReference type="EnsemblPlants" id="TraesPARA_EIv1.0_0283170.1">
    <property type="protein sequence ID" value="TraesPARA_EIv1.0_0283170.1.CDS1"/>
    <property type="gene ID" value="TraesPARA_EIv1.0_0283170"/>
</dbReference>
<dbReference type="EnsemblPlants" id="TraesPARA_EIv1.0_0283190.1">
    <property type="protein sequence ID" value="TraesPARA_EIv1.0_0283190.1.CDS1"/>
    <property type="gene ID" value="TraesPARA_EIv1.0_0283190"/>
</dbReference>
<dbReference type="EnsemblPlants" id="TraesPARA_EIv1.0_0289010.1">
    <property type="protein sequence ID" value="TraesPARA_EIv1.0_0289010.1.CDS1"/>
    <property type="gene ID" value="TraesPARA_EIv1.0_0289010"/>
</dbReference>
<dbReference type="EnsemblPlants" id="TraesPARA_EIv1.0_0291750.1">
    <property type="protein sequence ID" value="TraesPARA_EIv1.0_0291750.1.CDS1"/>
    <property type="gene ID" value="TraesPARA_EIv1.0_0291750"/>
</dbReference>
<dbReference type="EnsemblPlants" id="TraesPARA_EIv1.0_0310690.1">
    <property type="protein sequence ID" value="TraesPARA_EIv1.0_0310690.1.CDS1"/>
    <property type="gene ID" value="TraesPARA_EIv1.0_0310690"/>
</dbReference>
<dbReference type="EnsemblPlants" id="TraesPARA_EIv1.0_0310740.1">
    <property type="protein sequence ID" value="TraesPARA_EIv1.0_0310740.1.CDS1"/>
    <property type="gene ID" value="TraesPARA_EIv1.0_0310740"/>
</dbReference>
<dbReference type="EnsemblPlants" id="TraesPARA_EIv1.0_0310970.1">
    <property type="protein sequence ID" value="TraesPARA_EIv1.0_0310970.1.CDS1"/>
    <property type="gene ID" value="TraesPARA_EIv1.0_0310970"/>
</dbReference>
<dbReference type="EnsemblPlants" id="TraesPARA_EIv1.0_0311000.1">
    <property type="protein sequence ID" value="TraesPARA_EIv1.0_0311000.1.CDS1"/>
    <property type="gene ID" value="TraesPARA_EIv1.0_0311000"/>
</dbReference>
<dbReference type="EnsemblPlants" id="TraesPARA_EIv1.0_0374140.1">
    <property type="protein sequence ID" value="TraesPARA_EIv1.0_0374140.1.CDS1"/>
    <property type="gene ID" value="TraesPARA_EIv1.0_0374140"/>
</dbReference>
<dbReference type="EnsemblPlants" id="TraesPARA_EIv1.0_0390280.1">
    <property type="protein sequence ID" value="TraesPARA_EIv1.0_0390280.1.CDS1"/>
    <property type="gene ID" value="TraesPARA_EIv1.0_0390280"/>
</dbReference>
<dbReference type="EnsemblPlants" id="TraesPARA_EIv1.0_0540620.1">
    <property type="protein sequence ID" value="TraesPARA_EIv1.0_0540620.1.CDS1"/>
    <property type="gene ID" value="TraesPARA_EIv1.0_0540620"/>
</dbReference>
<dbReference type="EnsemblPlants" id="TraesPARA_EIv1.0_0576720.1">
    <property type="protein sequence ID" value="TraesPARA_EIv1.0_0576720.1.CDS1"/>
    <property type="gene ID" value="TraesPARA_EIv1.0_0576720"/>
</dbReference>
<dbReference type="EnsemblPlants" id="TraesPARA_EIv1.0_0700110.1">
    <property type="protein sequence ID" value="TraesPARA_EIv1.0_0700110.1.CDS1"/>
    <property type="gene ID" value="TraesPARA_EIv1.0_0700110"/>
</dbReference>
<dbReference type="EnsemblPlants" id="TraesPARA_EIv1.0_0800970.1">
    <property type="protein sequence ID" value="TraesPARA_EIv1.0_0800970.1.CDS1"/>
    <property type="gene ID" value="TraesPARA_EIv1.0_0800970"/>
</dbReference>
<dbReference type="EnsemblPlants" id="TraesPARA_EIv1.0_0856100.1">
    <property type="protein sequence ID" value="TraesPARA_EIv1.0_0856100.1.CDS1"/>
    <property type="gene ID" value="TraesPARA_EIv1.0_0856100"/>
</dbReference>
<dbReference type="EnsemblPlants" id="TraesPARA_EIv1.0_0972430.1">
    <property type="protein sequence ID" value="TraesPARA_EIv1.0_0972430.1.CDS1"/>
    <property type="gene ID" value="TraesPARA_EIv1.0_0972430"/>
</dbReference>
<dbReference type="EnsemblPlants" id="TraesPARA_EIv1.0_1008110.1">
    <property type="protein sequence ID" value="TraesPARA_EIv1.0_1008110.1.CDS1"/>
    <property type="gene ID" value="TraesPARA_EIv1.0_1008110"/>
</dbReference>
<dbReference type="EnsemblPlants" id="TraesPARA_EIv1.0_1084050.1">
    <property type="protein sequence ID" value="TraesPARA_EIv1.0_1084050.1.CDS1"/>
    <property type="gene ID" value="TraesPARA_EIv1.0_1084050"/>
</dbReference>
<dbReference type="EnsemblPlants" id="TraesPARA_EIv1.0_1139770.1">
    <property type="protein sequence ID" value="TraesPARA_EIv1.0_1139770.1.CDS1"/>
    <property type="gene ID" value="TraesPARA_EIv1.0_1139770"/>
</dbReference>
<dbReference type="EnsemblPlants" id="TraesPARA_EIv1.0_1215750.1">
    <property type="protein sequence ID" value="TraesPARA_EIv1.0_1215750.1.CDS1"/>
    <property type="gene ID" value="TraesPARA_EIv1.0_1215750"/>
</dbReference>
<dbReference type="EnsemblPlants" id="TraesPARA_EIv1.0_1215790.1">
    <property type="protein sequence ID" value="TraesPARA_EIv1.0_1215790.1.CDS1"/>
    <property type="gene ID" value="TraesPARA_EIv1.0_1215790"/>
</dbReference>
<dbReference type="EnsemblPlants" id="TraesPARA_EIv1.0_1295240.1">
    <property type="protein sequence ID" value="TraesPARA_EIv1.0_1295240.1.CDS1"/>
    <property type="gene ID" value="TraesPARA_EIv1.0_1295240"/>
</dbReference>
<dbReference type="EnsemblPlants" id="TraesPARA_EIv1.0_1300550.1">
    <property type="protein sequence ID" value="TraesPARA_EIv1.0_1300550.1.CDS1"/>
    <property type="gene ID" value="TraesPARA_EIv1.0_1300550"/>
</dbReference>
<dbReference type="EnsemblPlants" id="TraesPARA_EIv1.0_1379190.1">
    <property type="protein sequence ID" value="TraesPARA_EIv1.0_1379190.1.CDS1"/>
    <property type="gene ID" value="TraesPARA_EIv1.0_1379190"/>
</dbReference>
<dbReference type="EnsemblPlants" id="TraesPARA_EIv1.0_1471520.1">
    <property type="protein sequence ID" value="TraesPARA_EIv1.0_1471520.1.CDS1"/>
    <property type="gene ID" value="TraesPARA_EIv1.0_1471520"/>
</dbReference>
<dbReference type="EnsemblPlants" id="TraesPARA_EIv1.0_1477460.1">
    <property type="protein sequence ID" value="TraesPARA_EIv1.0_1477460.1.CDS1"/>
    <property type="gene ID" value="TraesPARA_EIv1.0_1477460"/>
</dbReference>
<dbReference type="EnsemblPlants" id="TraesPARA_EIv1.0_1677270.1">
    <property type="protein sequence ID" value="TraesPARA_EIv1.0_1677270.1.CDS1"/>
    <property type="gene ID" value="TraesPARA_EIv1.0_1677270"/>
</dbReference>
<dbReference type="EnsemblPlants" id="TraesPARA_EIv1.0_1810100.1">
    <property type="protein sequence ID" value="TraesPARA_EIv1.0_1810100.1.CDS1"/>
    <property type="gene ID" value="TraesPARA_EIv1.0_1810100"/>
</dbReference>
<dbReference type="EnsemblPlants" id="TraesPARA_EIv1.0_1902220.1">
    <property type="protein sequence ID" value="TraesPARA_EIv1.0_1902220.1.CDS1"/>
    <property type="gene ID" value="TraesPARA_EIv1.0_1902220"/>
</dbReference>
<dbReference type="EnsemblPlants" id="TraesPARA_EIv1.0_1902480.1">
    <property type="protein sequence ID" value="TraesPARA_EIv1.0_1902480.1.CDS1"/>
    <property type="gene ID" value="TraesPARA_EIv1.0_1902480"/>
</dbReference>
<dbReference type="EnsemblPlants" id="TraesPARA_EIv1.0_1910870.1">
    <property type="protein sequence ID" value="TraesPARA_EIv1.0_1910870.1.CDS1"/>
    <property type="gene ID" value="TraesPARA_EIv1.0_1910870"/>
</dbReference>
<dbReference type="EnsemblPlants" id="TraesPARA_EIv1.0_1924880.1">
    <property type="protein sequence ID" value="TraesPARA_EIv1.0_1924880.1.CDS1"/>
    <property type="gene ID" value="TraesPARA_EIv1.0_1924880"/>
</dbReference>
<dbReference type="EnsemblPlants" id="TraesPARA_EIv1.0_2014240.1">
    <property type="protein sequence ID" value="TraesPARA_EIv1.0_2014240.1.CDS1"/>
    <property type="gene ID" value="TraesPARA_EIv1.0_2014240"/>
</dbReference>
<dbReference type="EnsemblPlants" id="TraesPARA_EIv1.0_2014340.1">
    <property type="protein sequence ID" value="TraesPARA_EIv1.0_2014340.1.CDS1"/>
    <property type="gene ID" value="TraesPARA_EIv1.0_2014340"/>
</dbReference>
<dbReference type="EnsemblPlants" id="TraesPARA_EIv1.0_2015090.1">
    <property type="protein sequence ID" value="TraesPARA_EIv1.0_2015090.1.CDS1"/>
    <property type="gene ID" value="TraesPARA_EIv1.0_2015090"/>
</dbReference>
<dbReference type="EnsemblPlants" id="TraesPARA_EIv1.0_2185630.1">
    <property type="protein sequence ID" value="TraesPARA_EIv1.0_2185630.1.CDS1"/>
    <property type="gene ID" value="TraesPARA_EIv1.0_2185630"/>
</dbReference>
<dbReference type="EnsemblPlants" id="TraesPARA_EIv1.0_2199460.1">
    <property type="protein sequence ID" value="TraesPARA_EIv1.0_2199460.1.CDS1"/>
    <property type="gene ID" value="TraesPARA_EIv1.0_2199460"/>
</dbReference>
<dbReference type="EnsemblPlants" id="TraesPARA_EIv1.0_2209130.1">
    <property type="protein sequence ID" value="TraesPARA_EIv1.0_2209130.1.CDS1"/>
    <property type="gene ID" value="TraesPARA_EIv1.0_2209130"/>
</dbReference>
<dbReference type="EnsemblPlants" id="TraesPARA_EIv1.0_2209470.1">
    <property type="protein sequence ID" value="TraesPARA_EIv1.0_2209470.1.CDS1"/>
    <property type="gene ID" value="TraesPARA_EIv1.0_2209470"/>
</dbReference>
<dbReference type="EnsemblPlants" id="TraesPARA_EIv1.0_2250280.1">
    <property type="protein sequence ID" value="TraesPARA_EIv1.0_2250280.1.CDS1"/>
    <property type="gene ID" value="TraesPARA_EIv1.0_2250280"/>
</dbReference>
<dbReference type="EnsemblPlants" id="TraesPARA_EIv1.0_2250280.2">
    <property type="protein sequence ID" value="TraesPARA_EIv1.0_2250280.2.CDS1"/>
    <property type="gene ID" value="TraesPARA_EIv1.0_2250280"/>
</dbReference>
<dbReference type="EnsemblPlants" id="TraesPARA_EIv1.0_2250510.1">
    <property type="protein sequence ID" value="TraesPARA_EIv1.0_2250510.1.CDS1"/>
    <property type="gene ID" value="TraesPARA_EIv1.0_2250510"/>
</dbReference>
<dbReference type="EnsemblPlants" id="TraesPARA_EIv1.0_2254340.1">
    <property type="protein sequence ID" value="TraesPARA_EIv1.0_2254340.1.CDS1"/>
    <property type="gene ID" value="TraesPARA_EIv1.0_2254340"/>
</dbReference>
<dbReference type="EnsemblPlants" id="TraesPARA_EIv1.0_2254480.1">
    <property type="protein sequence ID" value="TraesPARA_EIv1.0_2254480.1.CDS1"/>
    <property type="gene ID" value="TraesPARA_EIv1.0_2254480"/>
</dbReference>
<dbReference type="EnsemblPlants" id="TraesPARA_EIv1.0_2254500.1">
    <property type="protein sequence ID" value="TraesPARA_EIv1.0_2254500.1.CDS1"/>
    <property type="gene ID" value="TraesPARA_EIv1.0_2254500"/>
</dbReference>
<dbReference type="EnsemblPlants" id="TraesPARA_EIv1.0_2254520.1">
    <property type="protein sequence ID" value="TraesPARA_EIv1.0_2254520.1.CDS1"/>
    <property type="gene ID" value="TraesPARA_EIv1.0_2254520"/>
</dbReference>
<dbReference type="EnsemblPlants" id="TraesPARA_EIv1.0_2254570.1">
    <property type="protein sequence ID" value="TraesPARA_EIv1.0_2254570.1.CDS1"/>
    <property type="gene ID" value="TraesPARA_EIv1.0_2254570"/>
</dbReference>
<dbReference type="EnsemblPlants" id="TraesPARA_EIv1.0_2254650.1">
    <property type="protein sequence ID" value="TraesPARA_EIv1.0_2254650.1.CDS1"/>
    <property type="gene ID" value="TraesPARA_EIv1.0_2254650"/>
</dbReference>
<dbReference type="EnsemblPlants" id="TraesPARA_EIv1.0_2369800.1">
    <property type="protein sequence ID" value="TraesPARA_EIv1.0_2369800.1.CDS1"/>
    <property type="gene ID" value="TraesPARA_EIv1.0_2369800"/>
</dbReference>
<dbReference type="EnsemblPlants" id="TraesPARA_EIv1.0_2370070.1">
    <property type="protein sequence ID" value="TraesPARA_EIv1.0_2370070.1.CDS1"/>
    <property type="gene ID" value="TraesPARA_EIv1.0_2370070"/>
</dbReference>
<dbReference type="EnsemblPlants" id="TraesPARA_EIv1.0_2370130.1">
    <property type="protein sequence ID" value="TraesPARA_EIv1.0_2370130.1.CDS1"/>
    <property type="gene ID" value="TraesPARA_EIv1.0_2370130"/>
</dbReference>
<dbReference type="EnsemblPlants" id="TraesPARA_EIv1.0_2370140.1">
    <property type="protein sequence ID" value="TraesPARA_EIv1.0_2370140.1.CDS1"/>
    <property type="gene ID" value="TraesPARA_EIv1.0_2370140"/>
</dbReference>
<dbReference type="EnsemblPlants" id="TraesPARA_EIv1.0_2370500.1">
    <property type="protein sequence ID" value="TraesPARA_EIv1.0_2370500.1.CDS1"/>
    <property type="gene ID" value="TraesPARA_EIv1.0_2370500"/>
</dbReference>
<dbReference type="EnsemblPlants" id="TraesPARA_EIv1.0_2526450.1">
    <property type="protein sequence ID" value="TraesPARA_EIv1.0_2526450.1.CDS1"/>
    <property type="gene ID" value="TraesPARA_EIv1.0_2526450"/>
</dbReference>
<dbReference type="EnsemblPlants" id="TraesPARA_EIv1.0_2526550.1">
    <property type="protein sequence ID" value="TraesPARA_EIv1.0_2526550.1.CDS1"/>
    <property type="gene ID" value="TraesPARA_EIv1.0_2526550"/>
</dbReference>
<dbReference type="EnsemblPlants" id="TraesPARA_EIv1.0_2530620.1">
    <property type="protein sequence ID" value="TraesPARA_EIv1.0_2530620.1.CDS1"/>
    <property type="gene ID" value="TraesPARA_EIv1.0_2530620"/>
</dbReference>
<dbReference type="EnsemblPlants" id="TraesPARA_EIv1.0_2530850.1">
    <property type="protein sequence ID" value="TraesPARA_EIv1.0_2530850.1.CDS1"/>
    <property type="gene ID" value="TraesPARA_EIv1.0_2530850"/>
</dbReference>
<dbReference type="EnsemblPlants" id="TraesPARA_EIv1.0_2530880.1">
    <property type="protein sequence ID" value="TraesPARA_EIv1.0_2530880.1.CDS1"/>
    <property type="gene ID" value="TraesPARA_EIv1.0_2530880"/>
</dbReference>
<dbReference type="EnsemblPlants" id="TraesPARA_EIv1.0_2536600.1">
    <property type="protein sequence ID" value="TraesPARA_EIv1.0_2536600.1.CDS1"/>
    <property type="gene ID" value="TraesPARA_EIv1.0_2536600"/>
</dbReference>
<dbReference type="EnsemblPlants" id="TraesRN1A0100640400.1">
    <property type="protein sequence ID" value="TraesRN1A0100640400.1"/>
    <property type="gene ID" value="TraesRN1A0100640400"/>
</dbReference>
<dbReference type="EnsemblPlants" id="TraesRN1A0100713400.1">
    <property type="protein sequence ID" value="TraesRN1A0100713400.1"/>
    <property type="gene ID" value="TraesRN1A0100713400"/>
</dbReference>
<dbReference type="EnsemblPlants" id="TraesRN1A0100738400.1">
    <property type="protein sequence ID" value="TraesRN1A0100738400.1"/>
    <property type="gene ID" value="TraesRN1A0100738400"/>
</dbReference>
<dbReference type="EnsemblPlants" id="TraesRN1B0101053300.1">
    <property type="protein sequence ID" value="TraesRN1B0101053300.1"/>
    <property type="gene ID" value="TraesRN1B0101053300"/>
</dbReference>
<dbReference type="EnsemblPlants" id="TraesRN1B0101055900.1">
    <property type="protein sequence ID" value="TraesRN1B0101055900.1"/>
    <property type="gene ID" value="TraesRN1B0101055900"/>
</dbReference>
<dbReference type="EnsemblPlants" id="TraesRN1B0101059600.1">
    <property type="protein sequence ID" value="TraesRN1B0101059600.1"/>
    <property type="gene ID" value="TraesRN1B0101059600"/>
</dbReference>
<dbReference type="EnsemblPlants" id="TraesRN1B0101060100.1">
    <property type="protein sequence ID" value="TraesRN1B0101060100.1"/>
    <property type="gene ID" value="TraesRN1B0101060100"/>
</dbReference>
<dbReference type="EnsemblPlants" id="TraesRN1D0100607300.1">
    <property type="protein sequence ID" value="TraesRN1D0100607300.1"/>
    <property type="gene ID" value="TraesRN1D0100607300"/>
</dbReference>
<dbReference type="EnsemblPlants" id="TraesRN1D0100700900.1">
    <property type="protein sequence ID" value="TraesRN1D0100700900.1"/>
    <property type="gene ID" value="TraesRN1D0100700900"/>
</dbReference>
<dbReference type="EnsemblPlants" id="TraesRN1D0100902200.1">
    <property type="protein sequence ID" value="TraesRN1D0100902200.1"/>
    <property type="gene ID" value="TraesRN1D0100902200"/>
</dbReference>
<dbReference type="EnsemblPlants" id="TraesRN1D0100905200.1">
    <property type="protein sequence ID" value="TraesRN1D0100905200.1"/>
    <property type="gene ID" value="TraesRN1D0100905200"/>
</dbReference>
<dbReference type="EnsemblPlants" id="TraesRN1D0100905600.1">
    <property type="protein sequence ID" value="TraesRN1D0100905600.1"/>
    <property type="gene ID" value="TraesRN1D0100905600"/>
</dbReference>
<dbReference type="EnsemblPlants" id="TraesRN2A0100722300.1">
    <property type="protein sequence ID" value="TraesRN2A0100722300.1"/>
    <property type="gene ID" value="TraesRN2A0100722300"/>
</dbReference>
<dbReference type="EnsemblPlants" id="TraesRN2A0100894600.1">
    <property type="protein sequence ID" value="TraesRN2A0100894600.1"/>
    <property type="gene ID" value="TraesRN2A0100894600"/>
</dbReference>
<dbReference type="EnsemblPlants" id="TraesRN2B0100457100.1">
    <property type="protein sequence ID" value="TraesRN2B0100457100.1"/>
    <property type="gene ID" value="TraesRN2B0100457100"/>
</dbReference>
<dbReference type="EnsemblPlants" id="TraesRN2B0100846900.1">
    <property type="protein sequence ID" value="TraesRN2B0100846900.1"/>
    <property type="gene ID" value="TraesRN2B0100846900"/>
</dbReference>
<dbReference type="EnsemblPlants" id="TraesRN2D0100730900.1">
    <property type="protein sequence ID" value="TraesRN2D0100730900.1"/>
    <property type="gene ID" value="TraesRN2D0100730900"/>
</dbReference>
<dbReference type="EnsemblPlants" id="TraesRN3A0100320600.1">
    <property type="protein sequence ID" value="TraesRN3A0100320600.1"/>
    <property type="gene ID" value="TraesRN3A0100320600"/>
</dbReference>
<dbReference type="EnsemblPlants" id="TraesRN3A0100910900.1">
    <property type="protein sequence ID" value="TraesRN3A0100910900.1"/>
    <property type="gene ID" value="TraesRN3A0100910900"/>
</dbReference>
<dbReference type="EnsemblPlants" id="TraesRN3A0100911000.1">
    <property type="protein sequence ID" value="TraesRN3A0100911000.1"/>
    <property type="gene ID" value="TraesRN3A0100911000"/>
</dbReference>
<dbReference type="EnsemblPlants" id="TraesRN3B0100391100.1">
    <property type="protein sequence ID" value="TraesRN3B0100391100.1"/>
    <property type="gene ID" value="TraesRN3B0100391100"/>
</dbReference>
<dbReference type="EnsemblPlants" id="TraesRN3B0100767700.1">
    <property type="protein sequence ID" value="TraesRN3B0100767700.1"/>
    <property type="gene ID" value="TraesRN3B0100767700"/>
</dbReference>
<dbReference type="EnsemblPlants" id="TraesRN3D0100336800.1">
    <property type="protein sequence ID" value="TraesRN3D0100336800.1"/>
    <property type="gene ID" value="TraesRN3D0100336800"/>
</dbReference>
<dbReference type="EnsemblPlants" id="TraesRN3D0100854400.1">
    <property type="protein sequence ID" value="TraesRN3D0100854400.1"/>
    <property type="gene ID" value="TraesRN3D0100854400"/>
</dbReference>
<dbReference type="EnsemblPlants" id="TraesRN4A0100060100.1">
    <property type="protein sequence ID" value="TraesRN4A0100060100.1"/>
    <property type="gene ID" value="TraesRN4A0100060100"/>
</dbReference>
<dbReference type="EnsemblPlants" id="TraesRN4A0100116600.1">
    <property type="protein sequence ID" value="TraesRN4A0100116600.1"/>
    <property type="gene ID" value="TraesRN4A0100116600"/>
</dbReference>
<dbReference type="EnsemblPlants" id="TraesRN4A0100969000.1">
    <property type="protein sequence ID" value="TraesRN4A0100969000.1"/>
    <property type="gene ID" value="TraesRN4A0100969000"/>
</dbReference>
<dbReference type="EnsemblPlants" id="TraesRN4A0100969100.1">
    <property type="protein sequence ID" value="TraesRN4A0100969100.1"/>
    <property type="gene ID" value="TraesRN4A0100969100"/>
</dbReference>
<dbReference type="EnsemblPlants" id="TraesRN4D0100612600.1">
    <property type="protein sequence ID" value="TraesRN4D0100612600.1"/>
    <property type="gene ID" value="TraesRN4D0100612600"/>
</dbReference>
<dbReference type="EnsemblPlants" id="TraesRN4D0100671300.1">
    <property type="protein sequence ID" value="TraesRN4D0100671300.1"/>
    <property type="gene ID" value="TraesRN4D0100671300"/>
</dbReference>
<dbReference type="EnsemblPlants" id="TraesRN5D0100480500.1">
    <property type="protein sequence ID" value="TraesRN5D0100480500.1"/>
    <property type="gene ID" value="TraesRN5D0100480500"/>
</dbReference>
<dbReference type="EnsemblPlants" id="TraesRN6B0100185500.1">
    <property type="protein sequence ID" value="TraesRN6B0100185500.1"/>
    <property type="gene ID" value="TraesRN6B0100185500"/>
</dbReference>
<dbReference type="EnsemblPlants" id="TraesRN6B0100186500.1">
    <property type="protein sequence ID" value="TraesRN6B0100186500.1"/>
    <property type="gene ID" value="TraesRN6B0100186500"/>
</dbReference>
<dbReference type="EnsemblPlants" id="TraesRN6B0100192000.1">
    <property type="protein sequence ID" value="TraesRN6B0100192000.1"/>
    <property type="gene ID" value="TraesRN6B0100192000"/>
</dbReference>
<dbReference type="EnsemblPlants" id="TraesRN6D0100145900.1">
    <property type="protein sequence ID" value="TraesRN6D0100145900.1"/>
    <property type="gene ID" value="TraesRN6D0100145900"/>
</dbReference>
<dbReference type="EnsemblPlants" id="TraesRN6D0100149100.1">
    <property type="protein sequence ID" value="TraesRN6D0100149100.1"/>
    <property type="gene ID" value="TraesRN6D0100149100"/>
</dbReference>
<dbReference type="EnsemblPlants" id="TraesRN6D0100208900.1">
    <property type="protein sequence ID" value="TraesRN6D0100208900.1"/>
    <property type="gene ID" value="TraesRN6D0100208900"/>
</dbReference>
<dbReference type="EnsemblPlants" id="TraesRN6D0100352700.1">
    <property type="protein sequence ID" value="TraesRN6D0100352700.1"/>
    <property type="gene ID" value="TraesRN6D0100352700"/>
</dbReference>
<dbReference type="EnsemblPlants" id="TraesRN7A0100213900.1">
    <property type="protein sequence ID" value="TraesRN7A0100213900.1"/>
    <property type="gene ID" value="TraesRN7A0100213900"/>
</dbReference>
<dbReference type="EnsemblPlants" id="TraesRN7A0100216100.1">
    <property type="protein sequence ID" value="TraesRN7A0100216100.1"/>
    <property type="gene ID" value="TraesRN7A0100216100"/>
</dbReference>
<dbReference type="EnsemblPlants" id="TraesRN7A0100248000.1">
    <property type="protein sequence ID" value="TraesRN7A0100248000.1"/>
    <property type="gene ID" value="TraesRN7A0100248000"/>
</dbReference>
<dbReference type="EnsemblPlants" id="TraesRN7A0100249200.1">
    <property type="protein sequence ID" value="TraesRN7A0100249200.1"/>
    <property type="gene ID" value="TraesRN7A0100249200"/>
</dbReference>
<dbReference type="EnsemblPlants" id="TraesRN7A0100249600.1">
    <property type="protein sequence ID" value="TraesRN7A0100249600.1"/>
    <property type="gene ID" value="TraesRN7A0100249600"/>
</dbReference>
<dbReference type="EnsemblPlants" id="TraesRN7B0100041100.1">
    <property type="protein sequence ID" value="TraesRN7B0100041100.1"/>
    <property type="gene ID" value="TraesRN7B0100041100"/>
</dbReference>
<dbReference type="EnsemblPlants" id="TraesRN7B0100043800.1">
    <property type="protein sequence ID" value="TraesRN7B0100043800.1"/>
    <property type="gene ID" value="TraesRN7B0100043800"/>
</dbReference>
<dbReference type="EnsemblPlants" id="TraesRN7B0100044600.1">
    <property type="protein sequence ID" value="TraesRN7B0100044600.1"/>
    <property type="gene ID" value="TraesRN7B0100044600"/>
</dbReference>
<dbReference type="EnsemblPlants" id="TraesRN7B0100050100.1">
    <property type="protein sequence ID" value="TraesRN7B0100050100.1"/>
    <property type="gene ID" value="TraesRN7B0100050100"/>
</dbReference>
<dbReference type="EnsemblPlants" id="TraesRN7D0100227700.1">
    <property type="protein sequence ID" value="TraesRN7D0100227700.1"/>
    <property type="gene ID" value="TraesRN7D0100227700"/>
</dbReference>
<dbReference type="EnsemblPlants" id="TraesRN7D0100267400.1">
    <property type="protein sequence ID" value="TraesRN7D0100267400.1"/>
    <property type="gene ID" value="TraesRN7D0100267400"/>
</dbReference>
<dbReference type="EnsemblPlants" id="TraesRN7D0100270000.1">
    <property type="protein sequence ID" value="TraesRN7D0100270000.1"/>
    <property type="gene ID" value="TraesRN7D0100270000"/>
</dbReference>
<dbReference type="EnsemblPlants" id="TraesRN7D0100270300.1">
    <property type="protein sequence ID" value="TraesRN7D0100270300.1"/>
    <property type="gene ID" value="TraesRN7D0100270300"/>
</dbReference>
<dbReference type="EnsemblPlants" id="TraesRN7D0100271200.1">
    <property type="protein sequence ID" value="TraesRN7D0100271200.1"/>
    <property type="gene ID" value="TraesRN7D0100271200"/>
</dbReference>
<dbReference type="EnsemblPlants" id="TraesRN7D0100335400.1">
    <property type="protein sequence ID" value="TraesRN7D0100335400.1"/>
    <property type="gene ID" value="TraesRN7D0100335400"/>
</dbReference>
<dbReference type="EnsemblPlants" id="TraesRN7D0100370200.1">
    <property type="protein sequence ID" value="TraesRN7D0100370200.1"/>
    <property type="gene ID" value="TraesRN7D0100370200"/>
</dbReference>
<dbReference type="EnsemblPlants" id="TraesRN7D0100370300.1">
    <property type="protein sequence ID" value="TraesRN7D0100370300.1"/>
    <property type="gene ID" value="TraesRN7D0100370300"/>
</dbReference>
<dbReference type="EnsemblPlants" id="TraesROB_scaffold_000971_01G001100.1">
    <property type="protein sequence ID" value="TraesROB_scaffold_000971_01G001100.1"/>
    <property type="gene ID" value="TraesROB_scaffold_000971_01G001100"/>
</dbReference>
<dbReference type="EnsemblPlants" id="TraesROB_scaffold_003788_01G000100.1">
    <property type="protein sequence ID" value="TraesROB_scaffold_003788_01G000100.1"/>
    <property type="gene ID" value="TraesROB_scaffold_003788_01G000100"/>
</dbReference>
<dbReference type="EnsemblPlants" id="TraesROB_scaffold_004357_01G000600.1">
    <property type="protein sequence ID" value="TraesROB_scaffold_004357_01G000600.1"/>
    <property type="gene ID" value="TraesROB_scaffold_004357_01G000600"/>
</dbReference>
<dbReference type="EnsemblPlants" id="TraesROB_scaffold_009210_01G000400.1">
    <property type="protein sequence ID" value="TraesROB_scaffold_009210_01G000400.1"/>
    <property type="gene ID" value="TraesROB_scaffold_009210_01G000400"/>
</dbReference>
<dbReference type="EnsemblPlants" id="TraesROB_scaffold_012158_01G000200.1">
    <property type="protein sequence ID" value="TraesROB_scaffold_012158_01G000200.1"/>
    <property type="gene ID" value="TraesROB_scaffold_012158_01G000200"/>
</dbReference>
<dbReference type="EnsemblPlants" id="TraesROB_scaffold_012158_01G000700.1">
    <property type="protein sequence ID" value="TraesROB_scaffold_012158_01G000700.1"/>
    <property type="gene ID" value="TraesROB_scaffold_012158_01G000700"/>
</dbReference>
<dbReference type="EnsemblPlants" id="TraesROB_scaffold_012412_01G000400.1">
    <property type="protein sequence ID" value="TraesROB_scaffold_012412_01G000400.1"/>
    <property type="gene ID" value="TraesROB_scaffold_012412_01G000400"/>
</dbReference>
<dbReference type="EnsemblPlants" id="TraesROB_scaffold_012412_01G000500.1">
    <property type="protein sequence ID" value="TraesROB_scaffold_012412_01G000500.1"/>
    <property type="gene ID" value="TraesROB_scaffold_012412_01G000500"/>
</dbReference>
<dbReference type="EnsemblPlants" id="TraesROB_scaffold_013379_01G000300.1">
    <property type="protein sequence ID" value="TraesROB_scaffold_013379_01G000300.1"/>
    <property type="gene ID" value="TraesROB_scaffold_013379_01G000300"/>
</dbReference>
<dbReference type="EnsemblPlants" id="TraesROB_scaffold_015375_01G000400.1">
    <property type="protein sequence ID" value="TraesROB_scaffold_015375_01G000400.1"/>
    <property type="gene ID" value="TraesROB_scaffold_015375_01G000400"/>
</dbReference>
<dbReference type="EnsemblPlants" id="TraesROB_scaffold_016704_01G000200.1">
    <property type="protein sequence ID" value="TraesROB_scaffold_016704_01G000200.1"/>
    <property type="gene ID" value="TraesROB_scaffold_016704_01G000200"/>
</dbReference>
<dbReference type="EnsemblPlants" id="TraesROB_scaffold_019345_01G000100.1">
    <property type="protein sequence ID" value="TraesROB_scaffold_019345_01G000100.1"/>
    <property type="gene ID" value="TraesROB_scaffold_019345_01G000100"/>
</dbReference>
<dbReference type="EnsemblPlants" id="TraesROB_scaffold_021338_01G000100.1">
    <property type="protein sequence ID" value="TraesROB_scaffold_021338_01G000100.1"/>
    <property type="gene ID" value="TraesROB_scaffold_021338_01G000100"/>
</dbReference>
<dbReference type="EnsemblPlants" id="TraesROB_scaffold_021883_01G000300.1">
    <property type="protein sequence ID" value="TraesROB_scaffold_021883_01G000300.1"/>
    <property type="gene ID" value="TraesROB_scaffold_021883_01G000300"/>
</dbReference>
<dbReference type="EnsemblPlants" id="TraesROB_scaffold_025515_01G000100.1">
    <property type="protein sequence ID" value="TraesROB_scaffold_025515_01G000100.1"/>
    <property type="gene ID" value="TraesROB_scaffold_025515_01G000100"/>
</dbReference>
<dbReference type="EnsemblPlants" id="TraesROB_scaffold_025871_01G000100.1">
    <property type="protein sequence ID" value="TraesROB_scaffold_025871_01G000100.1"/>
    <property type="gene ID" value="TraesROB_scaffold_025871_01G000100"/>
</dbReference>
<dbReference type="EnsemblPlants" id="TraesROB_scaffold_026482_01G000500.1">
    <property type="protein sequence ID" value="TraesROB_scaffold_026482_01G000500.1"/>
    <property type="gene ID" value="TraesROB_scaffold_026482_01G000500"/>
</dbReference>
<dbReference type="EnsemblPlants" id="TraesROB_scaffold_029161_01G000200.1">
    <property type="protein sequence ID" value="TraesROB_scaffold_029161_01G000200.1"/>
    <property type="gene ID" value="TraesROB_scaffold_029161_01G000200"/>
</dbReference>
<dbReference type="EnsemblPlants" id="TraesROB_scaffold_029640_01G000100.1">
    <property type="protein sequence ID" value="TraesROB_scaffold_029640_01G000100.1"/>
    <property type="gene ID" value="TraesROB_scaffold_029640_01G000100"/>
</dbReference>
<dbReference type="EnsemblPlants" id="TraesROB_scaffold_034113_01G000100.1">
    <property type="protein sequence ID" value="TraesROB_scaffold_034113_01G000100.1"/>
    <property type="gene ID" value="TraesROB_scaffold_034113_01G000100"/>
</dbReference>
<dbReference type="EnsemblPlants" id="TraesROB_scaffold_034345_01G000100.1">
    <property type="protein sequence ID" value="TraesROB_scaffold_034345_01G000100.1"/>
    <property type="gene ID" value="TraesROB_scaffold_034345_01G000100"/>
</dbReference>
<dbReference type="EnsemblPlants" id="TraesROB_scaffold_040298_01G000100.1">
    <property type="protein sequence ID" value="TraesROB_scaffold_040298_01G000100.1"/>
    <property type="gene ID" value="TraesROB_scaffold_040298_01G000100"/>
</dbReference>
<dbReference type="EnsemblPlants" id="TraesROB_scaffold_040448_01G000100.1">
    <property type="protein sequence ID" value="TraesROB_scaffold_040448_01G000100.1"/>
    <property type="gene ID" value="TraesROB_scaffold_040448_01G000100"/>
</dbReference>
<dbReference type="EnsemblPlants" id="TraesROB_scaffold_041075_01G000300.1">
    <property type="protein sequence ID" value="TraesROB_scaffold_041075_01G000300.1"/>
    <property type="gene ID" value="TraesROB_scaffold_041075_01G000300"/>
</dbReference>
<dbReference type="EnsemblPlants" id="TraesROB_scaffold_042642_01G000200.1">
    <property type="protein sequence ID" value="TraesROB_scaffold_042642_01G000200.1"/>
    <property type="gene ID" value="TraesROB_scaffold_042642_01G000200"/>
</dbReference>
<dbReference type="EnsemblPlants" id="TraesROB_scaffold_043725_01G000400.1">
    <property type="protein sequence ID" value="TraesROB_scaffold_043725_01G000400.1"/>
    <property type="gene ID" value="TraesROB_scaffold_043725_01G000400"/>
</dbReference>
<dbReference type="EnsemblPlants" id="TraesROB_scaffold_045993_01G001000.1">
    <property type="protein sequence ID" value="TraesROB_scaffold_045993_01G001000.1"/>
    <property type="gene ID" value="TraesROB_scaffold_045993_01G001000"/>
</dbReference>
<dbReference type="EnsemblPlants" id="TraesROB_scaffold_050070_01G000100.1">
    <property type="protein sequence ID" value="TraesROB_scaffold_050070_01G000100.1"/>
    <property type="gene ID" value="TraesROB_scaffold_050070_01G000100"/>
</dbReference>
<dbReference type="EnsemblPlants" id="TraesROB_scaffold_053355_01G000200.1">
    <property type="protein sequence ID" value="TraesROB_scaffold_053355_01G000200.1"/>
    <property type="gene ID" value="TraesROB_scaffold_053355_01G000200"/>
</dbReference>
<dbReference type="EnsemblPlants" id="TraesROB_scaffold_054284_01G000100.1">
    <property type="protein sequence ID" value="TraesROB_scaffold_054284_01G000100.1"/>
    <property type="gene ID" value="TraesROB_scaffold_054284_01G000100"/>
</dbReference>
<dbReference type="EnsemblPlants" id="TraesROB_scaffold_054727_01G000300.1">
    <property type="protein sequence ID" value="TraesROB_scaffold_054727_01G000300.1"/>
    <property type="gene ID" value="TraesROB_scaffold_054727_01G000300"/>
</dbReference>
<dbReference type="EnsemblPlants" id="TraesROB_scaffold_055093_01G000200.1">
    <property type="protein sequence ID" value="TraesROB_scaffold_055093_01G000200.1"/>
    <property type="gene ID" value="TraesROB_scaffold_055093_01G000200"/>
</dbReference>
<dbReference type="EnsemblPlants" id="TraesROB_scaffold_059292_01G000200.1">
    <property type="protein sequence ID" value="TraesROB_scaffold_059292_01G000200.1"/>
    <property type="gene ID" value="TraesROB_scaffold_059292_01G000200"/>
</dbReference>
<dbReference type="EnsemblPlants" id="TraesROB_scaffold_060345_01G000200.1">
    <property type="protein sequence ID" value="TraesROB_scaffold_060345_01G000200.1"/>
    <property type="gene ID" value="TraesROB_scaffold_060345_01G000200"/>
</dbReference>
<dbReference type="EnsemblPlants" id="TraesROB_scaffold_060484_01G000200.1">
    <property type="protein sequence ID" value="TraesROB_scaffold_060484_01G000200.1"/>
    <property type="gene ID" value="TraesROB_scaffold_060484_01G000200"/>
</dbReference>
<dbReference type="EnsemblPlants" id="TraesROB_scaffold_061113_01G000400.1">
    <property type="protein sequence ID" value="TraesROB_scaffold_061113_01G000400.1"/>
    <property type="gene ID" value="TraesROB_scaffold_061113_01G000400"/>
</dbReference>
<dbReference type="EnsemblPlants" id="TraesROB_scaffold_062790_01G000100.1">
    <property type="protein sequence ID" value="TraesROB_scaffold_062790_01G000100.1"/>
    <property type="gene ID" value="TraesROB_scaffold_062790_01G000100"/>
</dbReference>
<dbReference type="EnsemblPlants" id="TraesROB_scaffold_062790_01G000300.1">
    <property type="protein sequence ID" value="TraesROB_scaffold_062790_01G000300.1"/>
    <property type="gene ID" value="TraesROB_scaffold_062790_01G000300"/>
</dbReference>
<dbReference type="EnsemblPlants" id="TraesROB_scaffold_063256_01G000200.1">
    <property type="protein sequence ID" value="TraesROB_scaffold_063256_01G000200.1"/>
    <property type="gene ID" value="TraesROB_scaffold_063256_01G000200"/>
</dbReference>
<dbReference type="EnsemblPlants" id="TraesROB_scaffold_065676_01G000300.1">
    <property type="protein sequence ID" value="TraesROB_scaffold_065676_01G000300.1"/>
    <property type="gene ID" value="TraesROB_scaffold_065676_01G000300"/>
</dbReference>
<dbReference type="EnsemblPlants" id="TraesROB_scaffold_069625_01G000100.1">
    <property type="protein sequence ID" value="TraesROB_scaffold_069625_01G000100.1"/>
    <property type="gene ID" value="TraesROB_scaffold_069625_01G000100"/>
</dbReference>
<dbReference type="EnsemblPlants" id="TraesROB_scaffold_072421_01G000200.1">
    <property type="protein sequence ID" value="TraesROB_scaffold_072421_01G000200.1"/>
    <property type="gene ID" value="TraesROB_scaffold_072421_01G000200"/>
</dbReference>
<dbReference type="EnsemblPlants" id="TraesROB_scaffold_072739_01G000300.1">
    <property type="protein sequence ID" value="TraesROB_scaffold_072739_01G000300.1"/>
    <property type="gene ID" value="TraesROB_scaffold_072739_01G000300"/>
</dbReference>
<dbReference type="EnsemblPlants" id="TraesROB_scaffold_075200_01G000100.1">
    <property type="protein sequence ID" value="TraesROB_scaffold_075200_01G000100.1"/>
    <property type="gene ID" value="TraesROB_scaffold_075200_01G000100"/>
</dbReference>
<dbReference type="EnsemblPlants" id="TraesROB_scaffold_083279_01G000200.1">
    <property type="protein sequence ID" value="TraesROB_scaffold_083279_01G000200.1"/>
    <property type="gene ID" value="TraesROB_scaffold_083279_01G000200"/>
</dbReference>
<dbReference type="EnsemblPlants" id="TraesROB_scaffold_084074_01G000200.1">
    <property type="protein sequence ID" value="TraesROB_scaffold_084074_01G000200.1"/>
    <property type="gene ID" value="TraesROB_scaffold_084074_01G000200"/>
</dbReference>
<dbReference type="EnsemblPlants" id="TraesROB_scaffold_085178_01G000200.1">
    <property type="protein sequence ID" value="TraesROB_scaffold_085178_01G000200.1"/>
    <property type="gene ID" value="TraesROB_scaffold_085178_01G000200"/>
</dbReference>
<dbReference type="EnsemblPlants" id="TraesROB_scaffold_093997_01G000100.1">
    <property type="protein sequence ID" value="TraesROB_scaffold_093997_01G000100.1"/>
    <property type="gene ID" value="TraesROB_scaffold_093997_01G000100"/>
</dbReference>
<dbReference type="EnsemblPlants" id="TraesROB_scaffold_099072_01G000100.1">
    <property type="protein sequence ID" value="TraesROB_scaffold_099072_01G000100.1"/>
    <property type="gene ID" value="TraesROB_scaffold_099072_01G000100"/>
</dbReference>
<dbReference type="EnsemblPlants" id="TraesROB_scaffold_100545_01G000200.1">
    <property type="protein sequence ID" value="TraesROB_scaffold_100545_01G000200.1"/>
    <property type="gene ID" value="TraesROB_scaffold_100545_01G000200"/>
</dbReference>
<dbReference type="EnsemblPlants" id="TraesROB_scaffold_105169_01G000500.1">
    <property type="protein sequence ID" value="TraesROB_scaffold_105169_01G000500.1"/>
    <property type="gene ID" value="TraesROB_scaffold_105169_01G000500"/>
</dbReference>
<dbReference type="EnsemblPlants" id="TraesROB_scaffold_105727_01G000100.1">
    <property type="protein sequence ID" value="TraesROB_scaffold_105727_01G000100.1"/>
    <property type="gene ID" value="TraesROB_scaffold_105727_01G000100"/>
</dbReference>
<dbReference type="EnsemblPlants" id="TraesROB_scaffold_108744_01G000200.1">
    <property type="protein sequence ID" value="TraesROB_scaffold_108744_01G000200.1"/>
    <property type="gene ID" value="TraesROB_scaffold_108744_01G000200"/>
</dbReference>
<dbReference type="EnsemblPlants" id="TraesROB_scaffold_112811_01G000500.1">
    <property type="protein sequence ID" value="TraesROB_scaffold_112811_01G000500.1"/>
    <property type="gene ID" value="TraesROB_scaffold_112811_01G000500"/>
</dbReference>
<dbReference type="EnsemblPlants" id="TraesROB_scaffold_114644_01G000100.1">
    <property type="protein sequence ID" value="TraesROB_scaffold_114644_01G000100.1"/>
    <property type="gene ID" value="TraesROB_scaffold_114644_01G000100"/>
</dbReference>
<dbReference type="EnsemblPlants" id="TraesROB_scaffold_115080_01G000100.1">
    <property type="protein sequence ID" value="TraesROB_scaffold_115080_01G000100.1"/>
    <property type="gene ID" value="TraesROB_scaffold_115080_01G000100"/>
</dbReference>
<dbReference type="EnsemblPlants" id="TraesROB_scaffold_122116_01G000100.1">
    <property type="protein sequence ID" value="TraesROB_scaffold_122116_01G000100.1"/>
    <property type="gene ID" value="TraesROB_scaffold_122116_01G000100"/>
</dbReference>
<dbReference type="EnsemblPlants" id="TraesROB_scaffold_125443_01G000200.1">
    <property type="protein sequence ID" value="TraesROB_scaffold_125443_01G000200.1"/>
    <property type="gene ID" value="TraesROB_scaffold_125443_01G000200"/>
</dbReference>
<dbReference type="EnsemblPlants" id="TraesROB_scaffold_125572_01G000100.1">
    <property type="protein sequence ID" value="TraesROB_scaffold_125572_01G000100.1"/>
    <property type="gene ID" value="TraesROB_scaffold_125572_01G000100"/>
</dbReference>
<dbReference type="EnsemblPlants" id="TraesROB_scaffold_129751_01G000100.1">
    <property type="protein sequence ID" value="TraesROB_scaffold_129751_01G000100.1"/>
    <property type="gene ID" value="TraesROB_scaffold_129751_01G000100"/>
</dbReference>
<dbReference type="EnsemblPlants" id="TraesROB_scaffold_147721_01G000100.1">
    <property type="protein sequence ID" value="TraesROB_scaffold_147721_01G000100.1"/>
    <property type="gene ID" value="TraesROB_scaffold_147721_01G000100"/>
</dbReference>
<dbReference type="EnsemblPlants" id="TraesROB_scaffold_159472_01G000200.1">
    <property type="protein sequence ID" value="TraesROB_scaffold_159472_01G000200.1"/>
    <property type="gene ID" value="TraesROB_scaffold_159472_01G000200"/>
</dbReference>
<dbReference type="EnsemblPlants" id="TraesROB_scaffold_174971_01G000200.1">
    <property type="protein sequence ID" value="TraesROB_scaffold_174971_01G000200.1"/>
    <property type="gene ID" value="TraesROB_scaffold_174971_01G000200"/>
</dbReference>
<dbReference type="EnsemblPlants" id="TraesROB_scaffold_184814_01G000100.1">
    <property type="protein sequence ID" value="TraesROB_scaffold_184814_01G000100.1"/>
    <property type="gene ID" value="TraesROB_scaffold_184814_01G000100"/>
</dbReference>
<dbReference type="EnsemblPlants" id="TraesROB_scaffold_186089_01G000100.1">
    <property type="protein sequence ID" value="TraesROB_scaffold_186089_01G000100.1"/>
    <property type="gene ID" value="TraesROB_scaffold_186089_01G000100"/>
</dbReference>
<dbReference type="EnsemblPlants" id="TraesROB_scaffold_192334_01G000100.1">
    <property type="protein sequence ID" value="TraesROB_scaffold_192334_01G000100.1"/>
    <property type="gene ID" value="TraesROB_scaffold_192334_01G000100"/>
</dbReference>
<dbReference type="EnsemblPlants" id="TraesSTA1A03G00107310.1">
    <property type="protein sequence ID" value="TraesSTA1A03G00107310.1.CDS1"/>
    <property type="gene ID" value="TraesSTA1A03G00107310"/>
</dbReference>
<dbReference type="EnsemblPlants" id="TraesSTA1A03G00120290.1">
    <property type="protein sequence ID" value="TraesSTA1A03G00120290.1.CDS1"/>
    <property type="gene ID" value="TraesSTA1A03G00120290"/>
</dbReference>
<dbReference type="EnsemblPlants" id="TraesSTA1A03G00124260.1">
    <property type="protein sequence ID" value="TraesSTA1A03G00124260.1.CDS1"/>
    <property type="gene ID" value="TraesSTA1A03G00124260"/>
</dbReference>
<dbReference type="EnsemblPlants" id="TraesSTA1A03G00153580.1">
    <property type="protein sequence ID" value="TraesSTA1A03G00153580.1.CDS1"/>
    <property type="gene ID" value="TraesSTA1A03G00153580"/>
</dbReference>
<dbReference type="EnsemblPlants" id="TraesSTA1A03G00153720.1">
    <property type="protein sequence ID" value="TraesSTA1A03G00153720.1.CDS1"/>
    <property type="gene ID" value="TraesSTA1A03G00153720"/>
</dbReference>
<dbReference type="EnsemblPlants" id="TraesSTA1A03G00154120.1">
    <property type="protein sequence ID" value="TraesSTA1A03G00154120.1.CDS1"/>
    <property type="gene ID" value="TraesSTA1A03G00154120"/>
</dbReference>
<dbReference type="EnsemblPlants" id="TraesSTA1B03G00306980.1">
    <property type="protein sequence ID" value="TraesSTA1B03G00306980.1.CDS1"/>
    <property type="gene ID" value="TraesSTA1B03G00306980"/>
</dbReference>
<dbReference type="EnsemblPlants" id="TraesSTA1B03G00307010.1">
    <property type="protein sequence ID" value="TraesSTA1B03G00307010.1.CDS1"/>
    <property type="gene ID" value="TraesSTA1B03G00307010"/>
</dbReference>
<dbReference type="EnsemblPlants" id="TraesSTA1B03G00323500.1">
    <property type="protein sequence ID" value="TraesSTA1B03G00323500.1.CDS1"/>
    <property type="gene ID" value="TraesSTA1B03G00323500"/>
</dbReference>
<dbReference type="EnsemblPlants" id="TraesSTA1B03G00364040.1">
    <property type="protein sequence ID" value="TraesSTA1B03G00364040.1.CDS1"/>
    <property type="gene ID" value="TraesSTA1B03G00364040"/>
</dbReference>
<dbReference type="EnsemblPlants" id="TraesSTA1B03G00364520.1">
    <property type="protein sequence ID" value="TraesSTA1B03G00364520.1.CDS1"/>
    <property type="gene ID" value="TraesSTA1B03G00364520"/>
</dbReference>
<dbReference type="EnsemblPlants" id="TraesSTA1B03G00365180.1">
    <property type="protein sequence ID" value="TraesSTA1B03G00365180.1.CDS1"/>
    <property type="gene ID" value="TraesSTA1B03G00365180"/>
</dbReference>
<dbReference type="EnsemblPlants" id="TraesSTA1B03G00365310.1">
    <property type="protein sequence ID" value="TraesSTA1B03G00365310.1.CDS1"/>
    <property type="gene ID" value="TraesSTA1B03G00365310"/>
</dbReference>
<dbReference type="EnsemblPlants" id="TraesSTA1B03G00365360.1">
    <property type="protein sequence ID" value="TraesSTA1B03G00365360.1.CDS1"/>
    <property type="gene ID" value="TraesSTA1B03G00365360"/>
</dbReference>
<dbReference type="EnsemblPlants" id="TraesSTA1D03G00501490.1">
    <property type="protein sequence ID" value="TraesSTA1D03G00501490.1.CDS1"/>
    <property type="gene ID" value="TraesSTA1D03G00501490"/>
</dbReference>
<dbReference type="EnsemblPlants" id="TraesSTA1D03G00501530.1">
    <property type="protein sequence ID" value="TraesSTA1D03G00501530.1.CDS1"/>
    <property type="gene ID" value="TraesSTA1D03G00501530"/>
</dbReference>
<dbReference type="EnsemblPlants" id="TraesSTA1D03G00511580.1">
    <property type="protein sequence ID" value="TraesSTA1D03G00511580.1.CDS1"/>
    <property type="gene ID" value="TraesSTA1D03G00511580"/>
</dbReference>
<dbReference type="EnsemblPlants" id="TraesSTA1D03G00516400.1">
    <property type="protein sequence ID" value="TraesSTA1D03G00516400.1.CDS1"/>
    <property type="gene ID" value="TraesSTA1D03G00516400"/>
</dbReference>
<dbReference type="EnsemblPlants" id="TraesSTA1D03G00547310.1">
    <property type="protein sequence ID" value="TraesSTA1D03G00547310.1.CDS1"/>
    <property type="gene ID" value="TraesSTA1D03G00547310"/>
</dbReference>
<dbReference type="EnsemblPlants" id="TraesSTA1D03G00547860.1">
    <property type="protein sequence ID" value="TraesSTA1D03G00547860.1.CDS1"/>
    <property type="gene ID" value="TraesSTA1D03G00547860"/>
</dbReference>
<dbReference type="EnsemblPlants" id="TraesSTA1D03G00547950.1">
    <property type="protein sequence ID" value="TraesSTA1D03G00547950.1.CDS1"/>
    <property type="gene ID" value="TraesSTA1D03G00547950"/>
</dbReference>
<dbReference type="EnsemblPlants" id="TraesSTA2A03G00715960.1">
    <property type="protein sequence ID" value="TraesSTA2A03G00715960.1.CDS1"/>
    <property type="gene ID" value="TraesSTA2A03G00715960"/>
</dbReference>
<dbReference type="EnsemblPlants" id="TraesSTA2A03G00745080.1">
    <property type="protein sequence ID" value="TraesSTA2A03G00745080.1.CDS1"/>
    <property type="gene ID" value="TraesSTA2A03G00745080"/>
</dbReference>
<dbReference type="EnsemblPlants" id="TraesSTA2D03G01191100.1">
    <property type="protein sequence ID" value="TraesSTA2D03G01191100.1.CDS1"/>
    <property type="gene ID" value="TraesSTA2D03G01191100"/>
</dbReference>
<dbReference type="EnsemblPlants" id="TraesSTA3A03G01347760.1">
    <property type="protein sequence ID" value="TraesSTA3A03G01347760.1.CDS1"/>
    <property type="gene ID" value="TraesSTA3A03G01347760"/>
</dbReference>
<dbReference type="EnsemblPlants" id="TraesSTA3A03G01460080.1">
    <property type="protein sequence ID" value="TraesSTA3A03G01460080.1.CDS1"/>
    <property type="gene ID" value="TraesSTA3A03G01460080"/>
</dbReference>
<dbReference type="EnsemblPlants" id="TraesSTA3B03G01590710.1">
    <property type="protein sequence ID" value="TraesSTA3B03G01590710.1.CDS1"/>
    <property type="gene ID" value="TraesSTA3B03G01590710"/>
</dbReference>
<dbReference type="EnsemblPlants" id="TraesSTA3B03G01662810.1">
    <property type="protein sequence ID" value="TraesSTA3B03G01662810.1.CDS1"/>
    <property type="gene ID" value="TraesSTA3B03G01662810"/>
</dbReference>
<dbReference type="EnsemblPlants" id="TraesSTA3D03G01840460.1">
    <property type="protein sequence ID" value="TraesSTA3D03G01840460.1.CDS1"/>
    <property type="gene ID" value="TraesSTA3D03G01840460"/>
</dbReference>
<dbReference type="EnsemblPlants" id="TraesSTA3D03G01932470.1">
    <property type="protein sequence ID" value="TraesSTA3D03G01932470.1.CDS1"/>
    <property type="gene ID" value="TraesSTA3D03G01932470"/>
</dbReference>
<dbReference type="EnsemblPlants" id="TraesSTA4A03G02009620.1">
    <property type="protein sequence ID" value="TraesSTA4A03G02009620.1.CDS1"/>
    <property type="gene ID" value="TraesSTA4A03G02009620"/>
</dbReference>
<dbReference type="EnsemblPlants" id="TraesSTA4A03G02018980.1">
    <property type="protein sequence ID" value="TraesSTA4A03G02018980.1.CDS1"/>
    <property type="gene ID" value="TraesSTA4A03G02018980"/>
</dbReference>
<dbReference type="EnsemblPlants" id="TraesSTA4A03G02174180.1">
    <property type="protein sequence ID" value="TraesSTA4A03G02174180.1.CDS1"/>
    <property type="gene ID" value="TraesSTA4A03G02174180"/>
</dbReference>
<dbReference type="EnsemblPlants" id="TraesSTA4A03G02174240.1">
    <property type="protein sequence ID" value="TraesSTA4A03G02174240.1.CDS1"/>
    <property type="gene ID" value="TraesSTA4A03G02174240"/>
</dbReference>
<dbReference type="EnsemblPlants" id="TraesSTA4B03G02360750.1">
    <property type="protein sequence ID" value="TraesSTA4B03G02360750.1.CDS1"/>
    <property type="gene ID" value="TraesSTA4B03G02360750"/>
</dbReference>
<dbReference type="EnsemblPlants" id="TraesSTA4D03G02520700.1">
    <property type="protein sequence ID" value="TraesSTA4D03G02520700.1.CDS1"/>
    <property type="gene ID" value="TraesSTA4D03G02520700"/>
</dbReference>
<dbReference type="EnsemblPlants" id="TraesSTA5B03G02875510.1">
    <property type="protein sequence ID" value="TraesSTA5B03G02875510.1.CDS1"/>
    <property type="gene ID" value="TraesSTA5B03G02875510"/>
</dbReference>
<dbReference type="EnsemblPlants" id="TraesSTA5D03G03103640.1">
    <property type="protein sequence ID" value="TraesSTA5D03G03103640.1.CDS1"/>
    <property type="gene ID" value="TraesSTA5D03G03103640"/>
</dbReference>
<dbReference type="EnsemblPlants" id="TraesSTA6A03G03244160.1">
    <property type="protein sequence ID" value="TraesSTA6A03G03244160.1.CDS1"/>
    <property type="gene ID" value="TraesSTA6A03G03244160"/>
</dbReference>
<dbReference type="EnsemblPlants" id="TraesSTA6A03G03244680.1">
    <property type="protein sequence ID" value="TraesSTA6A03G03244680.1.CDS1"/>
    <property type="gene ID" value="TraesSTA6A03G03244680"/>
</dbReference>
<dbReference type="EnsemblPlants" id="TraesSTA6A03G03258560.1">
    <property type="protein sequence ID" value="TraesSTA6A03G03258560.1.CDS1"/>
    <property type="gene ID" value="TraesSTA6A03G03258560"/>
</dbReference>
<dbReference type="EnsemblPlants" id="TraesSTA6A03G03283550.1">
    <property type="protein sequence ID" value="TraesSTA6A03G03283550.1.CDS1"/>
    <property type="gene ID" value="TraesSTA6A03G03283550"/>
</dbReference>
<dbReference type="EnsemblPlants" id="TraesSTA6B03G03438240.1">
    <property type="protein sequence ID" value="TraesSTA6B03G03438240.1.CDS1"/>
    <property type="gene ID" value="TraesSTA6B03G03438240"/>
</dbReference>
<dbReference type="EnsemblPlants" id="TraesSTA6B03G03438480.1">
    <property type="protein sequence ID" value="TraesSTA6B03G03438480.1.CDS1"/>
    <property type="gene ID" value="TraesSTA6B03G03438480"/>
</dbReference>
<dbReference type="EnsemblPlants" id="TraesSTA6B03G03439450.1">
    <property type="protein sequence ID" value="TraesSTA6B03G03439450.1.CDS1"/>
    <property type="gene ID" value="TraesSTA6B03G03439450"/>
</dbReference>
<dbReference type="EnsemblPlants" id="TraesSTA6D03G03653610.1">
    <property type="protein sequence ID" value="TraesSTA6D03G03653610.1.CDS1"/>
    <property type="gene ID" value="TraesSTA6D03G03653610"/>
</dbReference>
<dbReference type="EnsemblPlants" id="TraesSTA6D03G03653610.2">
    <property type="protein sequence ID" value="TraesSTA6D03G03653610.2.CDS1"/>
    <property type="gene ID" value="TraesSTA6D03G03653610"/>
</dbReference>
<dbReference type="EnsemblPlants" id="TraesSTA6D03G03654050.1">
    <property type="protein sequence ID" value="TraesSTA6D03G03654050.1.CDS1"/>
    <property type="gene ID" value="TraesSTA6D03G03654050"/>
</dbReference>
<dbReference type="EnsemblPlants" id="TraesSTA6D03G03664360.1">
    <property type="protein sequence ID" value="TraesSTA6D03G03664360.1.CDS1"/>
    <property type="gene ID" value="TraesSTA6D03G03664360"/>
</dbReference>
<dbReference type="EnsemblPlants" id="TraesSTA6D03G03687180.1">
    <property type="protein sequence ID" value="TraesSTA6D03G03687180.1.CDS1"/>
    <property type="gene ID" value="TraesSTA6D03G03687180"/>
</dbReference>
<dbReference type="EnsemblPlants" id="TraesSTA7A03G03829330.1">
    <property type="protein sequence ID" value="TraesSTA7A03G03829330.1.CDS1"/>
    <property type="gene ID" value="TraesSTA7A03G03829330"/>
</dbReference>
<dbReference type="EnsemblPlants" id="TraesSTA7A03G03829590.1">
    <property type="protein sequence ID" value="TraesSTA7A03G03829590.1.CDS1"/>
    <property type="gene ID" value="TraesSTA7A03G03829590"/>
</dbReference>
<dbReference type="EnsemblPlants" id="TraesSTA7A03G03835780.1">
    <property type="protein sequence ID" value="TraesSTA7A03G03835780.1.CDS1"/>
    <property type="gene ID" value="TraesSTA7A03G03835780"/>
</dbReference>
<dbReference type="EnsemblPlants" id="TraesSTA7A03G03835980.1">
    <property type="protein sequence ID" value="TraesSTA7A03G03835980.1.CDS1"/>
    <property type="gene ID" value="TraesSTA7A03G03835980"/>
</dbReference>
<dbReference type="EnsemblPlants" id="TraesSTA7A03G03836010.1">
    <property type="protein sequence ID" value="TraesSTA7A03G03836010.1.CDS1"/>
    <property type="gene ID" value="TraesSTA7A03G03836010"/>
</dbReference>
<dbReference type="EnsemblPlants" id="TraesSTA7A03G03836060.1">
    <property type="protein sequence ID" value="TraesSTA7A03G03836060.1.CDS1"/>
    <property type="gene ID" value="TraesSTA7A03G03836060"/>
</dbReference>
<dbReference type="EnsemblPlants" id="TraesSTA7B03G04041620.1">
    <property type="protein sequence ID" value="TraesSTA7B03G04041620.1.CDS1"/>
    <property type="gene ID" value="TraesSTA7B03G04041620"/>
</dbReference>
<dbReference type="EnsemblPlants" id="TraesSTA7B03G04042070.1">
    <property type="protein sequence ID" value="TraesSTA7B03G04042070.1.CDS1"/>
    <property type="gene ID" value="TraesSTA7B03G04042070"/>
</dbReference>
<dbReference type="EnsemblPlants" id="TraesSTA7B03G04042140.1">
    <property type="protein sequence ID" value="TraesSTA7B03G04042140.1.CDS1"/>
    <property type="gene ID" value="TraesSTA7B03G04042140"/>
</dbReference>
<dbReference type="EnsemblPlants" id="TraesSTA7B03G04042460.1">
    <property type="protein sequence ID" value="TraesSTA7B03G04042460.1.CDS1"/>
    <property type="gene ID" value="TraesSTA7B03G04042460"/>
</dbReference>
<dbReference type="EnsemblPlants" id="TraesSTA7B03G04042560.1">
    <property type="protein sequence ID" value="TraesSTA7B03G04042560.1.CDS1"/>
    <property type="gene ID" value="TraesSTA7B03G04042560"/>
</dbReference>
<dbReference type="EnsemblPlants" id="TraesSTA7B03G04042590.1">
    <property type="protein sequence ID" value="TraesSTA7B03G04042590.1.CDS1"/>
    <property type="gene ID" value="TraesSTA7B03G04042590"/>
</dbReference>
<dbReference type="EnsemblPlants" id="TraesSTA7B03G04042690.1">
    <property type="protein sequence ID" value="TraesSTA7B03G04042690.1.CDS1"/>
    <property type="gene ID" value="TraesSTA7B03G04042690"/>
</dbReference>
<dbReference type="EnsemblPlants" id="TraesSTA7B03G04043190.1">
    <property type="protein sequence ID" value="TraesSTA7B03G04043190.1.CDS1"/>
    <property type="gene ID" value="TraesSTA7B03G04043190"/>
</dbReference>
<dbReference type="EnsemblPlants" id="TraesSTA7D03G04297190.1">
    <property type="protein sequence ID" value="TraesSTA7D03G04297190.1.CDS1"/>
    <property type="gene ID" value="TraesSTA7D03G04297190"/>
</dbReference>
<dbReference type="EnsemblPlants" id="TraesSTA7D03G04297300.1">
    <property type="protein sequence ID" value="TraesSTA7D03G04297300.1.CDS1"/>
    <property type="gene ID" value="TraesSTA7D03G04297300"/>
</dbReference>
<dbReference type="EnsemblPlants" id="TraesSTA7D03G04303110.1">
    <property type="protein sequence ID" value="TraesSTA7D03G04303110.1.CDS1"/>
    <property type="gene ID" value="TraesSTA7D03G04303110"/>
</dbReference>
<dbReference type="EnsemblPlants" id="TraesSTA7D03G04303430.1">
    <property type="protein sequence ID" value="TraesSTA7D03G04303430.1.CDS1"/>
    <property type="gene ID" value="TraesSTA7D03G04303430"/>
</dbReference>
<dbReference type="EnsemblPlants" id="TraesSTA7D03G04303450.1">
    <property type="protein sequence ID" value="TraesSTA7D03G04303450.1.CDS1"/>
    <property type="gene ID" value="TraesSTA7D03G04303450"/>
</dbReference>
<dbReference type="EnsemblPlants" id="TraesSTA7D03G04312560.1">
    <property type="protein sequence ID" value="TraesSTA7D03G04312560.1.CDS1"/>
    <property type="gene ID" value="TraesSTA7D03G04312560"/>
</dbReference>
<dbReference type="EnsemblPlants" id="TraesSYM1A03G00109890.1">
    <property type="protein sequence ID" value="TraesSYM1A03G00109890.1.CDS1"/>
    <property type="gene ID" value="TraesSYM1A03G00109890"/>
</dbReference>
<dbReference type="EnsemblPlants" id="TraesSYM1A03G00122960.1">
    <property type="protein sequence ID" value="TraesSYM1A03G00122960.1.CDS1"/>
    <property type="gene ID" value="TraesSYM1A03G00122960"/>
</dbReference>
<dbReference type="EnsemblPlants" id="TraesSYM1A03G00127060.1">
    <property type="protein sequence ID" value="TraesSYM1A03G00127060.1.CDS1"/>
    <property type="gene ID" value="TraesSYM1A03G00127060"/>
</dbReference>
<dbReference type="EnsemblPlants" id="TraesSYM1A03G00156700.1">
    <property type="protein sequence ID" value="TraesSYM1A03G00156700.1.CDS1"/>
    <property type="gene ID" value="TraesSYM1A03G00156700"/>
</dbReference>
<dbReference type="EnsemblPlants" id="TraesSYM1A03G00156820.1">
    <property type="protein sequence ID" value="TraesSYM1A03G00156820.1.CDS1"/>
    <property type="gene ID" value="TraesSYM1A03G00156820"/>
</dbReference>
<dbReference type="EnsemblPlants" id="TraesSYM1A03G00157250.1">
    <property type="protein sequence ID" value="TraesSYM1A03G00157250.1.CDS1"/>
    <property type="gene ID" value="TraesSYM1A03G00157250"/>
</dbReference>
<dbReference type="EnsemblPlants" id="TraesSYM1B03G00315320.1">
    <property type="protein sequence ID" value="TraesSYM1B03G00315320.1.CDS1"/>
    <property type="gene ID" value="TraesSYM1B03G00315320"/>
</dbReference>
<dbReference type="EnsemblPlants" id="TraesSYM1B03G00315350.1">
    <property type="protein sequence ID" value="TraesSYM1B03G00315350.1.CDS1"/>
    <property type="gene ID" value="TraesSYM1B03G00315350"/>
</dbReference>
<dbReference type="EnsemblPlants" id="TraesSYM1B03G00331750.1">
    <property type="protein sequence ID" value="TraesSYM1B03G00331750.1.CDS1"/>
    <property type="gene ID" value="TraesSYM1B03G00331750"/>
</dbReference>
<dbReference type="EnsemblPlants" id="TraesSYM1B03G00371650.1">
    <property type="protein sequence ID" value="TraesSYM1B03G00371650.1.CDS1"/>
    <property type="gene ID" value="TraesSYM1B03G00371650"/>
</dbReference>
<dbReference type="EnsemblPlants" id="TraesSYM1B03G00371650.2">
    <property type="protein sequence ID" value="TraesSYM1B03G00371650.2.CDS1"/>
    <property type="gene ID" value="TraesSYM1B03G00371650"/>
</dbReference>
<dbReference type="EnsemblPlants" id="TraesSYM1B03G00372160.1">
    <property type="protein sequence ID" value="TraesSYM1B03G00372160.1.CDS1"/>
    <property type="gene ID" value="TraesSYM1B03G00372160"/>
</dbReference>
<dbReference type="EnsemblPlants" id="TraesSYM1B03G00372820.1">
    <property type="protein sequence ID" value="TraesSYM1B03G00372820.1.CDS1"/>
    <property type="gene ID" value="TraesSYM1B03G00372820"/>
</dbReference>
<dbReference type="EnsemblPlants" id="TraesSYM1B03G00372960.1">
    <property type="protein sequence ID" value="TraesSYM1B03G00372960.1.CDS1"/>
    <property type="gene ID" value="TraesSYM1B03G00372960"/>
</dbReference>
<dbReference type="EnsemblPlants" id="TraesSYM1B03G00373000.1">
    <property type="protein sequence ID" value="TraesSYM1B03G00373000.1.CDS1"/>
    <property type="gene ID" value="TraesSYM1B03G00373000"/>
</dbReference>
<dbReference type="EnsemblPlants" id="TraesSYM1B03G00373000.2">
    <property type="protein sequence ID" value="TraesSYM1B03G00373000.2.CDS1"/>
    <property type="gene ID" value="TraesSYM1B03G00373000"/>
</dbReference>
<dbReference type="EnsemblPlants" id="TraesSYM1D03G00509620.1">
    <property type="protein sequence ID" value="TraesSYM1D03G00509620.1.CDS1"/>
    <property type="gene ID" value="TraesSYM1D03G00509620"/>
</dbReference>
<dbReference type="EnsemblPlants" id="TraesSYM1D03G00509670.1">
    <property type="protein sequence ID" value="TraesSYM1D03G00509670.1.CDS1"/>
    <property type="gene ID" value="TraesSYM1D03G00509670"/>
</dbReference>
<dbReference type="EnsemblPlants" id="TraesSYM1D03G00519890.1">
    <property type="protein sequence ID" value="TraesSYM1D03G00519890.1.CDS1"/>
    <property type="gene ID" value="TraesSYM1D03G00519890"/>
</dbReference>
<dbReference type="EnsemblPlants" id="TraesSYM1D03G00524560.1">
    <property type="protein sequence ID" value="TraesSYM1D03G00524560.1.CDS1"/>
    <property type="gene ID" value="TraesSYM1D03G00524560"/>
</dbReference>
<dbReference type="EnsemblPlants" id="TraesSYM1D03G00555690.1">
    <property type="protein sequence ID" value="TraesSYM1D03G00555690.1.CDS1"/>
    <property type="gene ID" value="TraesSYM1D03G00555690"/>
</dbReference>
<dbReference type="EnsemblPlants" id="TraesSYM1D03G00555770.1">
    <property type="protein sequence ID" value="TraesSYM1D03G00555770.1.CDS1"/>
    <property type="gene ID" value="TraesSYM1D03G00555770"/>
</dbReference>
<dbReference type="EnsemblPlants" id="TraesSYM1D03G00556300.1">
    <property type="protein sequence ID" value="TraesSYM1D03G00556300.1.CDS1"/>
    <property type="gene ID" value="TraesSYM1D03G00556300"/>
</dbReference>
<dbReference type="EnsemblPlants" id="TraesSYM1D03G00556380.1">
    <property type="protein sequence ID" value="TraesSYM1D03G00556380.1.CDS1"/>
    <property type="gene ID" value="TraesSYM1D03G00556380"/>
</dbReference>
<dbReference type="EnsemblPlants" id="TraesSYM2A03G00724730.1">
    <property type="protein sequence ID" value="TraesSYM2A03G00724730.1.CDS1"/>
    <property type="gene ID" value="TraesSYM2A03G00724730"/>
</dbReference>
<dbReference type="EnsemblPlants" id="TraesSYM2A03G00754570.1">
    <property type="protein sequence ID" value="TraesSYM2A03G00754570.1.CDS1"/>
    <property type="gene ID" value="TraesSYM2A03G00754570"/>
</dbReference>
<dbReference type="EnsemblPlants" id="TraesSYM2B03G00974220.1">
    <property type="protein sequence ID" value="TraesSYM2B03G00974220.1.CDS1"/>
    <property type="gene ID" value="TraesSYM2B03G00974220"/>
</dbReference>
<dbReference type="EnsemblPlants" id="TraesSYM2D03G01217370.1">
    <property type="protein sequence ID" value="TraesSYM2D03G01217370.1.CDS1"/>
    <property type="gene ID" value="TraesSYM2D03G01217370"/>
</dbReference>
<dbReference type="EnsemblPlants" id="TraesSYM3A03G01377750.1">
    <property type="protein sequence ID" value="TraesSYM3A03G01377750.1.CDS1"/>
    <property type="gene ID" value="TraesSYM3A03G01377750"/>
</dbReference>
<dbReference type="EnsemblPlants" id="TraesSYM3B03G01621750.1">
    <property type="protein sequence ID" value="TraesSYM3B03G01621750.1.CDS1"/>
    <property type="gene ID" value="TraesSYM3B03G01621750"/>
</dbReference>
<dbReference type="EnsemblPlants" id="TraesSYM3B03G01694050.1">
    <property type="protein sequence ID" value="TraesSYM3B03G01694050.1.CDS1"/>
    <property type="gene ID" value="TraesSYM3B03G01694050"/>
</dbReference>
<dbReference type="EnsemblPlants" id="TraesSYM3D03G01868430.1">
    <property type="protein sequence ID" value="TraesSYM3D03G01868430.1.CDS1"/>
    <property type="gene ID" value="TraesSYM3D03G01868430"/>
</dbReference>
<dbReference type="EnsemblPlants" id="TraesSYM3D03G01967370.1">
    <property type="protein sequence ID" value="TraesSYM3D03G01967370.1.CDS1"/>
    <property type="gene ID" value="TraesSYM3D03G01967370"/>
</dbReference>
<dbReference type="EnsemblPlants" id="TraesSYM4A03G02039220.1">
    <property type="protein sequence ID" value="TraesSYM4A03G02039220.1.CDS1"/>
    <property type="gene ID" value="TraesSYM4A03G02039220"/>
</dbReference>
<dbReference type="EnsemblPlants" id="TraesSYM4A03G02048700.1">
    <property type="protein sequence ID" value="TraesSYM4A03G02048700.1.CDS1"/>
    <property type="gene ID" value="TraesSYM4A03G02048700"/>
</dbReference>
<dbReference type="EnsemblPlants" id="TraesSYM4A03G02204490.1">
    <property type="protein sequence ID" value="TraesSYM4A03G02204490.1.CDS1"/>
    <property type="gene ID" value="TraesSYM4A03G02204490"/>
</dbReference>
<dbReference type="EnsemblPlants" id="TraesSYM4A03G02204530.1">
    <property type="protein sequence ID" value="TraesSYM4A03G02204530.1.CDS1"/>
    <property type="gene ID" value="TraesSYM4A03G02204530"/>
</dbReference>
<dbReference type="EnsemblPlants" id="TraesSYM4B03G02393170.1">
    <property type="protein sequence ID" value="TraesSYM4B03G02393170.1.CDS1"/>
    <property type="gene ID" value="TraesSYM4B03G02393170"/>
</dbReference>
<dbReference type="EnsemblPlants" id="TraesSYM4D03G02553580.1">
    <property type="protein sequence ID" value="TraesSYM4D03G02553580.1.CDS1"/>
    <property type="gene ID" value="TraesSYM4D03G02553580"/>
</dbReference>
<dbReference type="EnsemblPlants" id="TraesSYM4D03G02563460.1">
    <property type="protein sequence ID" value="TraesSYM4D03G02563460.1.CDS1"/>
    <property type="gene ID" value="TraesSYM4D03G02563460"/>
</dbReference>
<dbReference type="EnsemblPlants" id="TraesSYM5B03G02943930.1">
    <property type="protein sequence ID" value="TraesSYM5B03G02943930.1.CDS1"/>
    <property type="gene ID" value="TraesSYM5B03G02943930"/>
</dbReference>
<dbReference type="EnsemblPlants" id="TraesSYM5B03G02954910.1">
    <property type="protein sequence ID" value="TraesSYM5B03G02954910.1.CDS1"/>
    <property type="gene ID" value="TraesSYM5B03G02954910"/>
</dbReference>
<dbReference type="EnsemblPlants" id="TraesSYM5B03G02955640.1">
    <property type="protein sequence ID" value="TraesSYM5B03G02955640.1.CDS1"/>
    <property type="gene ID" value="TraesSYM5B03G02955640"/>
</dbReference>
<dbReference type="EnsemblPlants" id="TraesSYM5B03G02955730.1">
    <property type="protein sequence ID" value="TraesSYM5B03G02955730.1.CDS1"/>
    <property type="gene ID" value="TraesSYM5B03G02955730"/>
</dbReference>
<dbReference type="EnsemblPlants" id="TraesSYM5B03G02955750.1">
    <property type="protein sequence ID" value="TraesSYM5B03G02955750.1.CDS1"/>
    <property type="gene ID" value="TraesSYM5B03G02955750"/>
</dbReference>
<dbReference type="EnsemblPlants" id="TraesSYM5B03G02955870.1">
    <property type="protein sequence ID" value="TraesSYM5B03G02955870.1.CDS1"/>
    <property type="gene ID" value="TraesSYM5B03G02955870"/>
</dbReference>
<dbReference type="EnsemblPlants" id="TraesSYM5B03G02956180.1">
    <property type="protein sequence ID" value="TraesSYM5B03G02956180.1.CDS1"/>
    <property type="gene ID" value="TraesSYM5B03G02956180"/>
</dbReference>
<dbReference type="EnsemblPlants" id="TraesSYM5B03G02956250.1">
    <property type="protein sequence ID" value="TraesSYM5B03G02956250.1.CDS1"/>
    <property type="gene ID" value="TraesSYM5B03G02956250"/>
</dbReference>
<dbReference type="EnsemblPlants" id="TraesSYM5B03G02956710.1">
    <property type="protein sequence ID" value="TraesSYM5B03G02956710.1.CDS1"/>
    <property type="gene ID" value="TraesSYM5B03G02956710"/>
</dbReference>
<dbReference type="EnsemblPlants" id="TraesSYM5D03G03052730.1">
    <property type="protein sequence ID" value="TraesSYM5D03G03052730.1.CDS1"/>
    <property type="gene ID" value="TraesSYM5D03G03052730"/>
</dbReference>
<dbReference type="EnsemblPlants" id="TraesSYM6A03G03194270.1">
    <property type="protein sequence ID" value="TraesSYM6A03G03194270.1.CDS1"/>
    <property type="gene ID" value="TraesSYM6A03G03194270"/>
</dbReference>
<dbReference type="EnsemblPlants" id="TraesSYM6A03G03194810.1">
    <property type="protein sequence ID" value="TraesSYM6A03G03194810.1.CDS1"/>
    <property type="gene ID" value="TraesSYM6A03G03194810"/>
</dbReference>
<dbReference type="EnsemblPlants" id="TraesSYM6A03G03208570.1">
    <property type="protein sequence ID" value="TraesSYM6A03G03208570.1.CDS1"/>
    <property type="gene ID" value="TraesSYM6A03G03208570"/>
</dbReference>
<dbReference type="EnsemblPlants" id="TraesSYM6A03G03233600.1">
    <property type="protein sequence ID" value="TraesSYM6A03G03233600.1.CDS1"/>
    <property type="gene ID" value="TraesSYM6A03G03233600"/>
</dbReference>
<dbReference type="EnsemblPlants" id="TraesSYM6B03G03389270.1">
    <property type="protein sequence ID" value="TraesSYM6B03G03389270.1.CDS1"/>
    <property type="gene ID" value="TraesSYM6B03G03389270"/>
</dbReference>
<dbReference type="EnsemblPlants" id="TraesSYM6B03G03389270.2">
    <property type="protein sequence ID" value="TraesSYM6B03G03389270.2.CDS1"/>
    <property type="gene ID" value="TraesSYM6B03G03389270"/>
</dbReference>
<dbReference type="EnsemblPlants" id="TraesSYM6B03G03389560.1">
    <property type="protein sequence ID" value="TraesSYM6B03G03389560.1.CDS1"/>
    <property type="gene ID" value="TraesSYM6B03G03389560"/>
</dbReference>
<dbReference type="EnsemblPlants" id="TraesSYM6B03G03390540.1">
    <property type="protein sequence ID" value="TraesSYM6B03G03390540.1.CDS1"/>
    <property type="gene ID" value="TraesSYM6B03G03390540"/>
</dbReference>
<dbReference type="EnsemblPlants" id="TraesSYM6D03G03617330.1">
    <property type="protein sequence ID" value="TraesSYM6D03G03617330.1.CDS1"/>
    <property type="gene ID" value="TraesSYM6D03G03617330"/>
</dbReference>
<dbReference type="EnsemblPlants" id="TraesSYM6D03G03640230.1">
    <property type="protein sequence ID" value="TraesSYM6D03G03640230.1.CDS1"/>
    <property type="gene ID" value="TraesSYM6D03G03640230"/>
</dbReference>
<dbReference type="EnsemblPlants" id="TraesSYM7A03G03785210.1">
    <property type="protein sequence ID" value="TraesSYM7A03G03785210.1.CDS1"/>
    <property type="gene ID" value="TraesSYM7A03G03785210"/>
</dbReference>
<dbReference type="EnsemblPlants" id="TraesSYM7A03G03785490.1">
    <property type="protein sequence ID" value="TraesSYM7A03G03785490.1.CDS1"/>
    <property type="gene ID" value="TraesSYM7A03G03785490"/>
</dbReference>
<dbReference type="EnsemblPlants" id="TraesSYM7A03G03791820.1">
    <property type="protein sequence ID" value="TraesSYM7A03G03791820.1.CDS1"/>
    <property type="gene ID" value="TraesSYM7A03G03791820"/>
</dbReference>
<dbReference type="EnsemblPlants" id="TraesSYM7A03G03792050.1">
    <property type="protein sequence ID" value="TraesSYM7A03G03792050.1.CDS1"/>
    <property type="gene ID" value="TraesSYM7A03G03792050"/>
</dbReference>
<dbReference type="EnsemblPlants" id="TraesSYM7A03G03792100.1">
    <property type="protein sequence ID" value="TraesSYM7A03G03792100.1.CDS1"/>
    <property type="gene ID" value="TraesSYM7A03G03792100"/>
</dbReference>
<dbReference type="EnsemblPlants" id="TraesSYM7A03G03792170.1">
    <property type="protein sequence ID" value="TraesSYM7A03G03792170.1.CDS1"/>
    <property type="gene ID" value="TraesSYM7A03G03792170"/>
</dbReference>
<dbReference type="EnsemblPlants" id="TraesSYM7B03G04137340.1">
    <property type="protein sequence ID" value="TraesSYM7B03G04137340.1.CDS1"/>
    <property type="gene ID" value="TraesSYM7B03G04137340"/>
</dbReference>
<dbReference type="EnsemblPlants" id="TraesSYM7D03G04356300.1">
    <property type="protein sequence ID" value="TraesSYM7D03G04356300.1.CDS1"/>
    <property type="gene ID" value="TraesSYM7D03G04356300"/>
</dbReference>
<dbReference type="EnsemblPlants" id="TraesSYM7D03G04356420.1">
    <property type="protein sequence ID" value="TraesSYM7D03G04356420.1.CDS1"/>
    <property type="gene ID" value="TraesSYM7D03G04356420"/>
</dbReference>
<dbReference type="EnsemblPlants" id="TraesSYM7D03G04362720.1">
    <property type="protein sequence ID" value="TraesSYM7D03G04362720.1.CDS1"/>
    <property type="gene ID" value="TraesSYM7D03G04362720"/>
</dbReference>
<dbReference type="EnsemblPlants" id="TraesSYM7D03G04362760.1">
    <property type="protein sequence ID" value="TraesSYM7D03G04362760.1.CDS1"/>
    <property type="gene ID" value="TraesSYM7D03G04362760"/>
</dbReference>
<dbReference type="EnsemblPlants" id="TraesSYM7D03G04371750.1">
    <property type="protein sequence ID" value="TraesSYM7D03G04371750.1.CDS1"/>
    <property type="gene ID" value="TraesSYM7D03G04371750"/>
</dbReference>
<dbReference type="EnsemblPlants" id="TraesWEE_scaffold_003642_01G000200.1">
    <property type="protein sequence ID" value="TraesWEE_scaffold_003642_01G000200.1"/>
    <property type="gene ID" value="TraesWEE_scaffold_003642_01G000200"/>
</dbReference>
<dbReference type="EnsemblPlants" id="TraesWEE_scaffold_003757_01G000100.1">
    <property type="protein sequence ID" value="TraesWEE_scaffold_003757_01G000100.1"/>
    <property type="gene ID" value="TraesWEE_scaffold_003757_01G000100"/>
</dbReference>
<dbReference type="EnsemblPlants" id="TraesWEE_scaffold_003757_01G000300.1">
    <property type="protein sequence ID" value="TraesWEE_scaffold_003757_01G000300.1"/>
    <property type="gene ID" value="TraesWEE_scaffold_003757_01G000300"/>
</dbReference>
<dbReference type="EnsemblPlants" id="TraesWEE_scaffold_004406_01G000100.1">
    <property type="protein sequence ID" value="TraesWEE_scaffold_004406_01G000100.1"/>
    <property type="gene ID" value="TraesWEE_scaffold_004406_01G000100"/>
</dbReference>
<dbReference type="EnsemblPlants" id="TraesWEE_scaffold_006317_01G000400.1">
    <property type="protein sequence ID" value="TraesWEE_scaffold_006317_01G000400.1"/>
    <property type="gene ID" value="TraesWEE_scaffold_006317_01G000400"/>
</dbReference>
<dbReference type="EnsemblPlants" id="TraesWEE_scaffold_006317_01G000600.1">
    <property type="protein sequence ID" value="TraesWEE_scaffold_006317_01G000600.1"/>
    <property type="gene ID" value="TraesWEE_scaffold_006317_01G000600"/>
</dbReference>
<dbReference type="EnsemblPlants" id="TraesWEE_scaffold_006317_01G000800.1">
    <property type="protein sequence ID" value="TraesWEE_scaffold_006317_01G000800.1"/>
    <property type="gene ID" value="TraesWEE_scaffold_006317_01G000800"/>
</dbReference>
<dbReference type="EnsemblPlants" id="TraesWEE_scaffold_007488_01G000200.1">
    <property type="protein sequence ID" value="TraesWEE_scaffold_007488_01G000200.1"/>
    <property type="gene ID" value="TraesWEE_scaffold_007488_01G000200"/>
</dbReference>
<dbReference type="EnsemblPlants" id="TraesWEE_scaffold_008507_01G000900.1">
    <property type="protein sequence ID" value="TraesWEE_scaffold_008507_01G000900.1"/>
    <property type="gene ID" value="TraesWEE_scaffold_008507_01G000900"/>
</dbReference>
<dbReference type="EnsemblPlants" id="TraesWEE_scaffold_008507_01G001400.1">
    <property type="protein sequence ID" value="TraesWEE_scaffold_008507_01G001400.1"/>
    <property type="gene ID" value="TraesWEE_scaffold_008507_01G001400"/>
</dbReference>
<dbReference type="EnsemblPlants" id="TraesWEE_scaffold_008507_01G001600.1">
    <property type="protein sequence ID" value="TraesWEE_scaffold_008507_01G001600.1"/>
    <property type="gene ID" value="TraesWEE_scaffold_008507_01G001600"/>
</dbReference>
<dbReference type="EnsemblPlants" id="TraesWEE_scaffold_008923_01G000300.1">
    <property type="protein sequence ID" value="TraesWEE_scaffold_008923_01G000300.1"/>
    <property type="gene ID" value="TraesWEE_scaffold_008923_01G000300"/>
</dbReference>
<dbReference type="EnsemblPlants" id="TraesWEE_scaffold_008996_01G000200.1">
    <property type="protein sequence ID" value="TraesWEE_scaffold_008996_01G000200.1"/>
    <property type="gene ID" value="TraesWEE_scaffold_008996_01G000200"/>
</dbReference>
<dbReference type="EnsemblPlants" id="TraesWEE_scaffold_011000_01G000200.1">
    <property type="protein sequence ID" value="TraesWEE_scaffold_011000_01G000200.1"/>
    <property type="gene ID" value="TraesWEE_scaffold_011000_01G000200"/>
</dbReference>
<dbReference type="EnsemblPlants" id="TraesWEE_scaffold_014927_01G000200.1">
    <property type="protein sequence ID" value="TraesWEE_scaffold_014927_01G000200.1"/>
    <property type="gene ID" value="TraesWEE_scaffold_014927_01G000200"/>
</dbReference>
<dbReference type="EnsemblPlants" id="TraesWEE_scaffold_015928_01G000100.1">
    <property type="protein sequence ID" value="TraesWEE_scaffold_015928_01G000100.1"/>
    <property type="gene ID" value="TraesWEE_scaffold_015928_01G000100"/>
</dbReference>
<dbReference type="EnsemblPlants" id="TraesWEE_scaffold_016974_01G000100.1">
    <property type="protein sequence ID" value="TraesWEE_scaffold_016974_01G000100.1"/>
    <property type="gene ID" value="TraesWEE_scaffold_016974_01G000100"/>
</dbReference>
<dbReference type="EnsemblPlants" id="TraesWEE_scaffold_030568_01G000100.1">
    <property type="protein sequence ID" value="TraesWEE_scaffold_030568_01G000100.1"/>
    <property type="gene ID" value="TraesWEE_scaffold_030568_01G000100"/>
</dbReference>
<dbReference type="EnsemblPlants" id="TraesWEE_scaffold_030869_01G000100.1">
    <property type="protein sequence ID" value="TraesWEE_scaffold_030869_01G000100.1"/>
    <property type="gene ID" value="TraesWEE_scaffold_030869_01G000100"/>
</dbReference>
<dbReference type="EnsemblPlants" id="TraesWEE_scaffold_031270_01G000700.1">
    <property type="protein sequence ID" value="TraesWEE_scaffold_031270_01G000700.1"/>
    <property type="gene ID" value="TraesWEE_scaffold_031270_01G000700"/>
</dbReference>
<dbReference type="EnsemblPlants" id="TraesWEE_scaffold_031654_01G000100.1">
    <property type="protein sequence ID" value="TraesWEE_scaffold_031654_01G000100.1"/>
    <property type="gene ID" value="TraesWEE_scaffold_031654_01G000100"/>
</dbReference>
<dbReference type="EnsemblPlants" id="TraesWEE_scaffold_032945_01G000400.1">
    <property type="protein sequence ID" value="TraesWEE_scaffold_032945_01G000400.1"/>
    <property type="gene ID" value="TraesWEE_scaffold_032945_01G000400"/>
</dbReference>
<dbReference type="EnsemblPlants" id="TraesWEE_scaffold_033003_01G000400.1">
    <property type="protein sequence ID" value="TraesWEE_scaffold_033003_01G000400.1"/>
    <property type="gene ID" value="TraesWEE_scaffold_033003_01G000400"/>
</dbReference>
<dbReference type="EnsemblPlants" id="TraesWEE_scaffold_036046_01G000200.1">
    <property type="protein sequence ID" value="TraesWEE_scaffold_036046_01G000200.1"/>
    <property type="gene ID" value="TraesWEE_scaffold_036046_01G000200"/>
</dbReference>
<dbReference type="EnsemblPlants" id="TraesWEE_scaffold_042260_01G000100.1">
    <property type="protein sequence ID" value="TraesWEE_scaffold_042260_01G000100.1"/>
    <property type="gene ID" value="TraesWEE_scaffold_042260_01G000100"/>
</dbReference>
<dbReference type="EnsemblPlants" id="TraesWEE_scaffold_043343_01G000400.1">
    <property type="protein sequence ID" value="TraesWEE_scaffold_043343_01G000400.1"/>
    <property type="gene ID" value="TraesWEE_scaffold_043343_01G000400"/>
</dbReference>
<dbReference type="EnsemblPlants" id="TraesWEE_scaffold_047855_01G000200.1">
    <property type="protein sequence ID" value="TraesWEE_scaffold_047855_01G000200.1"/>
    <property type="gene ID" value="TraesWEE_scaffold_047855_01G000200"/>
</dbReference>
<dbReference type="EnsemblPlants" id="TraesWEE_scaffold_052273_01G000100.1">
    <property type="protein sequence ID" value="TraesWEE_scaffold_052273_01G000100.1"/>
    <property type="gene ID" value="TraesWEE_scaffold_052273_01G000100"/>
</dbReference>
<dbReference type="EnsemblPlants" id="TraesWEE_scaffold_054094_01G000400.1">
    <property type="protein sequence ID" value="TraesWEE_scaffold_054094_01G000400.1"/>
    <property type="gene ID" value="TraesWEE_scaffold_054094_01G000400"/>
</dbReference>
<dbReference type="EnsemblPlants" id="TraesWEE_scaffold_057264_01G000200.1">
    <property type="protein sequence ID" value="TraesWEE_scaffold_057264_01G000200.1"/>
    <property type="gene ID" value="TraesWEE_scaffold_057264_01G000200"/>
</dbReference>
<dbReference type="EnsemblPlants" id="TraesWEE_scaffold_058045_01G000300.1">
    <property type="protein sequence ID" value="TraesWEE_scaffold_058045_01G000300.1"/>
    <property type="gene ID" value="TraesWEE_scaffold_058045_01G000300"/>
</dbReference>
<dbReference type="EnsemblPlants" id="TraesWEE_scaffold_058567_01G000200.1">
    <property type="protein sequence ID" value="TraesWEE_scaffold_058567_01G000200.1"/>
    <property type="gene ID" value="TraesWEE_scaffold_058567_01G000200"/>
</dbReference>
<dbReference type="EnsemblPlants" id="TraesWEE_scaffold_060191_01G000100.1">
    <property type="protein sequence ID" value="TraesWEE_scaffold_060191_01G000100.1"/>
    <property type="gene ID" value="TraesWEE_scaffold_060191_01G000100"/>
</dbReference>
<dbReference type="EnsemblPlants" id="TraesWEE_scaffold_063197_01G000300.1">
    <property type="protein sequence ID" value="TraesWEE_scaffold_063197_01G000300.1"/>
    <property type="gene ID" value="TraesWEE_scaffold_063197_01G000300"/>
</dbReference>
<dbReference type="EnsemblPlants" id="TraesWEE_scaffold_064306_01G000100.1">
    <property type="protein sequence ID" value="TraesWEE_scaffold_064306_01G000100.1"/>
    <property type="gene ID" value="TraesWEE_scaffold_064306_01G000100"/>
</dbReference>
<dbReference type="EnsemblPlants" id="TraesWEE_scaffold_068030_01G000100.1">
    <property type="protein sequence ID" value="TraesWEE_scaffold_068030_01G000100.1"/>
    <property type="gene ID" value="TraesWEE_scaffold_068030_01G000100"/>
</dbReference>
<dbReference type="EnsemblPlants" id="TraesWEE_scaffold_069453_01G000100.1">
    <property type="protein sequence ID" value="TraesWEE_scaffold_069453_01G000100.1"/>
    <property type="gene ID" value="TraesWEE_scaffold_069453_01G000100"/>
</dbReference>
<dbReference type="EnsemblPlants" id="TraesWEE_scaffold_069556_01G000100.1">
    <property type="protein sequence ID" value="TraesWEE_scaffold_069556_01G000100.1"/>
    <property type="gene ID" value="TraesWEE_scaffold_069556_01G000100"/>
</dbReference>
<dbReference type="EnsemblPlants" id="TraesWEE_scaffold_069556_01G000300.1">
    <property type="protein sequence ID" value="TraesWEE_scaffold_069556_01G000300.1"/>
    <property type="gene ID" value="TraesWEE_scaffold_069556_01G000300"/>
</dbReference>
<dbReference type="EnsemblPlants" id="TraesWEE_scaffold_072301_01G000100.1">
    <property type="protein sequence ID" value="TraesWEE_scaffold_072301_01G000100.1"/>
    <property type="gene ID" value="TraesWEE_scaffold_072301_01G000100"/>
</dbReference>
<dbReference type="EnsemblPlants" id="TraesWEE_scaffold_073686_01G000200.1">
    <property type="protein sequence ID" value="TraesWEE_scaffold_073686_01G000200.1"/>
    <property type="gene ID" value="TraesWEE_scaffold_073686_01G000200"/>
</dbReference>
<dbReference type="EnsemblPlants" id="TraesWEE_scaffold_078687_01G000100.1">
    <property type="protein sequence ID" value="TraesWEE_scaffold_078687_01G000100.1"/>
    <property type="gene ID" value="TraesWEE_scaffold_078687_01G000100"/>
</dbReference>
<dbReference type="EnsemblPlants" id="TraesWEE_scaffold_079673_01G000100.1">
    <property type="protein sequence ID" value="TraesWEE_scaffold_079673_01G000100.1"/>
    <property type="gene ID" value="TraesWEE_scaffold_079673_01G000100"/>
</dbReference>
<dbReference type="EnsemblPlants" id="TraesWEE_scaffold_080614_01G000300.1">
    <property type="protein sequence ID" value="TraesWEE_scaffold_080614_01G000300.1"/>
    <property type="gene ID" value="TraesWEE_scaffold_080614_01G000300"/>
</dbReference>
<dbReference type="EnsemblPlants" id="TraesWEE_scaffold_082614_01G000100.1">
    <property type="protein sequence ID" value="TraesWEE_scaffold_082614_01G000100.1"/>
    <property type="gene ID" value="TraesWEE_scaffold_082614_01G000100"/>
</dbReference>
<dbReference type="EnsemblPlants" id="TraesWEE_scaffold_085513_01G000200.1">
    <property type="protein sequence ID" value="TraesWEE_scaffold_085513_01G000200.1"/>
    <property type="gene ID" value="TraesWEE_scaffold_085513_01G000200"/>
</dbReference>
<dbReference type="EnsemblPlants" id="TraesWEE_scaffold_094012_01G000200.1">
    <property type="protein sequence ID" value="TraesWEE_scaffold_094012_01G000200.1"/>
    <property type="gene ID" value="TraesWEE_scaffold_094012_01G000200"/>
</dbReference>
<dbReference type="EnsemblPlants" id="TraesWEE_scaffold_107348_01G000100.1">
    <property type="protein sequence ID" value="TraesWEE_scaffold_107348_01G000100.1"/>
    <property type="gene ID" value="TraesWEE_scaffold_107348_01G000100"/>
</dbReference>
<dbReference type="EnsemblPlants" id="TraesWEE_scaffold_108165_01G000100.1">
    <property type="protein sequence ID" value="TraesWEE_scaffold_108165_01G000100.1"/>
    <property type="gene ID" value="TraesWEE_scaffold_108165_01G000100"/>
</dbReference>
<dbReference type="EnsemblPlants" id="TraesWEE_scaffold_111764_01G000100.1">
    <property type="protein sequence ID" value="TraesWEE_scaffold_111764_01G000100.1"/>
    <property type="gene ID" value="TraesWEE_scaffold_111764_01G000100"/>
</dbReference>
<dbReference type="EnsemblPlants" id="TraesWEE_scaffold_111829_01G000200.1">
    <property type="protein sequence ID" value="TraesWEE_scaffold_111829_01G000200.1"/>
    <property type="gene ID" value="TraesWEE_scaffold_111829_01G000200"/>
</dbReference>
<dbReference type="EnsemblPlants" id="TraesWEE_scaffold_114032_01G000100.1">
    <property type="protein sequence ID" value="TraesWEE_scaffold_114032_01G000100.1"/>
    <property type="gene ID" value="TraesWEE_scaffold_114032_01G000100"/>
</dbReference>
<dbReference type="EnsemblPlants" id="TraesWEE_scaffold_122262_01G000100.1">
    <property type="protein sequence ID" value="TraesWEE_scaffold_122262_01G000100.1"/>
    <property type="gene ID" value="TraesWEE_scaffold_122262_01G000100"/>
</dbReference>
<dbReference type="EnsemblPlants" id="TraesWEE_scaffold_134319_01G000100.1">
    <property type="protein sequence ID" value="TraesWEE_scaffold_134319_01G000100.1"/>
    <property type="gene ID" value="TraesWEE_scaffold_134319_01G000100"/>
</dbReference>
<dbReference type="EnsemblPlants" id="TraesWEE_scaffold_145896_01G000100.1">
    <property type="protein sequence ID" value="TraesWEE_scaffold_145896_01G000100.1"/>
    <property type="gene ID" value="TraesWEE_scaffold_145896_01G000100"/>
</dbReference>
<dbReference type="EnsemblPlants" id="TraesWEE_scaffold_155481_01G000300.1">
    <property type="protein sequence ID" value="TraesWEE_scaffold_155481_01G000300.1"/>
    <property type="gene ID" value="TraesWEE_scaffold_155481_01G000300"/>
</dbReference>
<dbReference type="EnsemblPlants" id="TraesWEE_scaffold_155911_01G000100.1">
    <property type="protein sequence ID" value="TraesWEE_scaffold_155911_01G000100.1"/>
    <property type="gene ID" value="TraesWEE_scaffold_155911_01G000100"/>
</dbReference>
<dbReference type="EnsemblPlants" id="TraesWEE_scaffold_164053_01G000100.1">
    <property type="protein sequence ID" value="TraesWEE_scaffold_164053_01G000100.1"/>
    <property type="gene ID" value="TraesWEE_scaffold_164053_01G000100"/>
</dbReference>
<dbReference type="EnsemblPlants" id="TraesWEE_scaffold_166798_01G000200.1">
    <property type="protein sequence ID" value="TraesWEE_scaffold_166798_01G000200.1"/>
    <property type="gene ID" value="TraesWEE_scaffold_166798_01G000200"/>
</dbReference>
<dbReference type="EnsemblPlants" id="TraesWEE_scaffold_169734_01G000200.1">
    <property type="protein sequence ID" value="TraesWEE_scaffold_169734_01G000200.1"/>
    <property type="gene ID" value="TraesWEE_scaffold_169734_01G000200"/>
</dbReference>
<dbReference type="EnsemblPlants" id="TraesWEE_scaffold_184138_01G000100.1">
    <property type="protein sequence ID" value="TraesWEE_scaffold_184138_01G000100.1"/>
    <property type="gene ID" value="TraesWEE_scaffold_184138_01G000100"/>
</dbReference>
<dbReference type="EnsemblPlants" id="TraesWEE_scaffold_864301_01G000100.1">
    <property type="protein sequence ID" value="TraesWEE_scaffold_864301_01G000100.1"/>
    <property type="gene ID" value="TraesWEE_scaffold_864301_01G000100"/>
</dbReference>
<dbReference type="GeneID" id="123045447"/>
<dbReference type="GeneID" id="123053099"/>
<dbReference type="GeneID" id="123053276"/>
<dbReference type="GeneID" id="123056226"/>
<dbReference type="GeneID" id="123057731"/>
<dbReference type="GeneID" id="123060632"/>
<dbReference type="GeneID" id="123062714"/>
<dbReference type="GeneID" id="123064951"/>
<dbReference type="GeneID" id="123065019"/>
<dbReference type="GeneID" id="123065167"/>
<dbReference type="GeneID" id="123077766"/>
<dbReference type="GeneID" id="123079871"/>
<dbReference type="GeneID" id="123083067"/>
<dbReference type="GeneID" id="123084869"/>
<dbReference type="GeneID" id="123085076"/>
<dbReference type="GeneID" id="123093219"/>
<dbReference type="GeneID" id="123098255"/>
<dbReference type="GeneID" id="123098485"/>
<dbReference type="GeneID" id="123111760"/>
<dbReference type="GeneID" id="123121324"/>
<dbReference type="GeneID" id="123129777"/>
<dbReference type="GeneID" id="123129797"/>
<dbReference type="GeneID" id="123130177"/>
<dbReference type="GeneID" id="123131853"/>
<dbReference type="GeneID" id="123132101"/>
<dbReference type="GeneID" id="123132552"/>
<dbReference type="GeneID" id="123135794"/>
<dbReference type="GeneID" id="123135797"/>
<dbReference type="GeneID" id="123142483"/>
<dbReference type="GeneID" id="123142541"/>
<dbReference type="GeneID" id="123142768"/>
<dbReference type="GeneID" id="123142780"/>
<dbReference type="GeneID" id="123142801"/>
<dbReference type="GeneID" id="123143336"/>
<dbReference type="GeneID" id="123143348"/>
<dbReference type="GeneID" id="123143640"/>
<dbReference type="GeneID" id="123144137"/>
<dbReference type="GeneID" id="123148483"/>
<dbReference type="GeneID" id="123150186"/>
<dbReference type="GeneID" id="123151750"/>
<dbReference type="GeneID" id="123151991"/>
<dbReference type="GeneID" id="123160574"/>
<dbReference type="GeneID" id="123160722"/>
<dbReference type="GeneID" id="123160991"/>
<dbReference type="GeneID" id="123161088"/>
<dbReference type="GeneID" id="123161110"/>
<dbReference type="GeneID" id="123161173"/>
<dbReference type="GeneID" id="123161643"/>
<dbReference type="GeneID" id="123161647"/>
<dbReference type="GeneID" id="123164197"/>
<dbReference type="GeneID" id="123164199"/>
<dbReference type="GeneID" id="123165654"/>
<dbReference type="GeneID" id="123165814"/>
<dbReference type="GeneID" id="123166098"/>
<dbReference type="GeneID" id="123168468"/>
<dbReference type="GeneID" id="123168782"/>
<dbReference type="GeneID" id="123169152"/>
<dbReference type="GeneID" id="123172832"/>
<dbReference type="GeneID" id="123172833"/>
<dbReference type="GeneID" id="123176104"/>
<dbReference type="GeneID" id="123179564"/>
<dbReference type="GeneID" id="123181786"/>
<dbReference type="GeneID" id="123181788"/>
<dbReference type="GeneID" id="123182165"/>
<dbReference type="GeneID" id="123182808"/>
<dbReference type="GeneID" id="123182809"/>
<dbReference type="GeneID" id="123182823"/>
<dbReference type="GeneID" id="123182824"/>
<dbReference type="GeneID" id="123189853"/>
<dbReference type="Gramene" id="TraesARI1A03G00108990.1">
    <property type="protein sequence ID" value="TraesARI1A03G00108990.1.CDS1"/>
    <property type="gene ID" value="TraesARI1A03G00108990"/>
</dbReference>
<dbReference type="Gramene" id="TraesARI1A03G00121700.1">
    <property type="protein sequence ID" value="TraesARI1A03G00121700.1.CDS1"/>
    <property type="gene ID" value="TraesARI1A03G00121700"/>
</dbReference>
<dbReference type="Gramene" id="TraesARI1A03G00125700.1">
    <property type="protein sequence ID" value="TraesARI1A03G00125700.1.CDS1"/>
    <property type="gene ID" value="TraesARI1A03G00125700"/>
</dbReference>
<dbReference type="Gramene" id="TraesARI1A03G00155450.1">
    <property type="protein sequence ID" value="TraesARI1A03G00155450.1.CDS1"/>
    <property type="gene ID" value="TraesARI1A03G00155450"/>
</dbReference>
<dbReference type="Gramene" id="TraesARI1A03G00155560.1">
    <property type="protein sequence ID" value="TraesARI1A03G00155560.1.CDS1"/>
    <property type="gene ID" value="TraesARI1A03G00155560"/>
</dbReference>
<dbReference type="Gramene" id="TraesARI1A03G00155970.1">
    <property type="protein sequence ID" value="TraesARI1A03G00155970.1.CDS1"/>
    <property type="gene ID" value="TraesARI1A03G00155970"/>
</dbReference>
<dbReference type="Gramene" id="TraesARI1B03G00311320.1">
    <property type="protein sequence ID" value="TraesARI1B03G00311320.1.CDS1"/>
    <property type="gene ID" value="TraesARI1B03G00311320"/>
</dbReference>
<dbReference type="Gramene" id="TraesARI1B03G00311360.1">
    <property type="protein sequence ID" value="TraesARI1B03G00311360.1.CDS1"/>
    <property type="gene ID" value="TraesARI1B03G00311360"/>
</dbReference>
<dbReference type="Gramene" id="TraesARI1B03G00328320.1">
    <property type="protein sequence ID" value="TraesARI1B03G00328320.1.CDS1"/>
    <property type="gene ID" value="TraesARI1B03G00328320"/>
</dbReference>
<dbReference type="Gramene" id="TraesARI1B03G00369110.1">
    <property type="protein sequence ID" value="TraesARI1B03G00369110.1.CDS1"/>
    <property type="gene ID" value="TraesARI1B03G00369110"/>
</dbReference>
<dbReference type="Gramene" id="TraesARI1B03G00369620.1">
    <property type="protein sequence ID" value="TraesARI1B03G00369620.1.CDS1"/>
    <property type="gene ID" value="TraesARI1B03G00369620"/>
</dbReference>
<dbReference type="Gramene" id="TraesARI1B03G00370000.1">
    <property type="protein sequence ID" value="TraesARI1B03G00370000.1.CDS1"/>
    <property type="gene ID" value="TraesARI1B03G00370000"/>
</dbReference>
<dbReference type="Gramene" id="TraesARI1B03G00370140.1">
    <property type="protein sequence ID" value="TraesARI1B03G00370140.1.CDS1"/>
    <property type="gene ID" value="TraesARI1B03G00370140"/>
</dbReference>
<dbReference type="Gramene" id="TraesARI1B03G00370180.1">
    <property type="protein sequence ID" value="TraesARI1B03G00370180.1.CDS1"/>
    <property type="gene ID" value="TraesARI1B03G00370180"/>
</dbReference>
<dbReference type="Gramene" id="TraesARI1D03G00508440.1">
    <property type="protein sequence ID" value="TraesARI1D03G00508440.1.CDS1"/>
    <property type="gene ID" value="TraesARI1D03G00508440"/>
</dbReference>
<dbReference type="Gramene" id="TraesARI1D03G00518590.1">
    <property type="protein sequence ID" value="TraesARI1D03G00518590.1.CDS1"/>
    <property type="gene ID" value="TraesARI1D03G00518590"/>
</dbReference>
<dbReference type="Gramene" id="TraesARI1D03G00523380.1">
    <property type="protein sequence ID" value="TraesARI1D03G00523380.1.CDS1"/>
    <property type="gene ID" value="TraesARI1D03G00523380"/>
</dbReference>
<dbReference type="Gramene" id="TraesARI1D03G00554980.1">
    <property type="protein sequence ID" value="TraesARI1D03G00554980.1.CDS1"/>
    <property type="gene ID" value="TraesARI1D03G00554980"/>
</dbReference>
<dbReference type="Gramene" id="TraesARI1D03G00555070.1">
    <property type="protein sequence ID" value="TraesARI1D03G00555070.1.CDS1"/>
    <property type="gene ID" value="TraesARI1D03G00555070"/>
</dbReference>
<dbReference type="Gramene" id="TraesARI1D03G00555580.1">
    <property type="protein sequence ID" value="TraesARI1D03G00555580.1.CDS1"/>
    <property type="gene ID" value="TraesARI1D03G00555580"/>
</dbReference>
<dbReference type="Gramene" id="TraesARI1D03G00555670.1">
    <property type="protein sequence ID" value="TraesARI1D03G00555670.1.CDS1"/>
    <property type="gene ID" value="TraesARI1D03G00555670"/>
</dbReference>
<dbReference type="Gramene" id="TraesARI2A03G00725020.1">
    <property type="protein sequence ID" value="TraesARI2A03G00725020.1.CDS1"/>
    <property type="gene ID" value="TraesARI2A03G00725020"/>
</dbReference>
<dbReference type="Gramene" id="TraesARI2A03G00754640.1">
    <property type="protein sequence ID" value="TraesARI2A03G00754640.1.CDS1"/>
    <property type="gene ID" value="TraesARI2A03G00754640"/>
</dbReference>
<dbReference type="Gramene" id="TraesARI2B03G00900180.1">
    <property type="protein sequence ID" value="TraesARI2B03G00900180.1.CDS1"/>
    <property type="gene ID" value="TraesARI2B03G00900180"/>
</dbReference>
<dbReference type="Gramene" id="TraesARI2B03G00974780.1">
    <property type="protein sequence ID" value="TraesARI2B03G00974780.1.CDS1"/>
    <property type="gene ID" value="TraesARI2B03G00974780"/>
</dbReference>
<dbReference type="Gramene" id="TraesARI2D03G01218440.1">
    <property type="protein sequence ID" value="TraesARI2D03G01218440.1.CDS1"/>
    <property type="gene ID" value="TraesARI2D03G01218440"/>
</dbReference>
<dbReference type="Gramene" id="TraesARI3A03G01376300.1">
    <property type="protein sequence ID" value="TraesARI3A03G01376300.1.CDS1"/>
    <property type="gene ID" value="TraesARI3A03G01376300"/>
</dbReference>
<dbReference type="Gramene" id="TraesARI3A03G01490140.1">
    <property type="protein sequence ID" value="TraesARI3A03G01490140.1.CDS1"/>
    <property type="gene ID" value="TraesARI3A03G01490140"/>
</dbReference>
<dbReference type="Gramene" id="TraesARI3B03G01623270.1">
    <property type="protein sequence ID" value="TraesARI3B03G01623270.1.CDS1"/>
    <property type="gene ID" value="TraesARI3B03G01623270"/>
</dbReference>
<dbReference type="Gramene" id="TraesARI3B03G01705260.1">
    <property type="protein sequence ID" value="TraesARI3B03G01705260.1.CDS1"/>
    <property type="gene ID" value="TraesARI3B03G01705260"/>
</dbReference>
<dbReference type="Gramene" id="TraesARI3D03G01878370.1">
    <property type="protein sequence ID" value="TraesARI3D03G01878370.1.CDS1"/>
    <property type="gene ID" value="TraesARI3D03G01878370"/>
</dbReference>
<dbReference type="Gramene" id="TraesARI3D03G01977060.1">
    <property type="protein sequence ID" value="TraesARI3D03G01977060.1.CDS1"/>
    <property type="gene ID" value="TraesARI3D03G01977060"/>
</dbReference>
<dbReference type="Gramene" id="TraesARI4A03G02049300.1">
    <property type="protein sequence ID" value="TraesARI4A03G02049300.1.CDS1"/>
    <property type="gene ID" value="TraesARI4A03G02049300"/>
</dbReference>
<dbReference type="Gramene" id="TraesARI4A03G02058580.1">
    <property type="protein sequence ID" value="TraesARI4A03G02058580.1.CDS1"/>
    <property type="gene ID" value="TraesARI4A03G02058580"/>
</dbReference>
<dbReference type="Gramene" id="TraesARI4A03G02215230.1">
    <property type="protein sequence ID" value="TraesARI4A03G02215230.1.CDS1"/>
    <property type="gene ID" value="TraesARI4A03G02215230"/>
</dbReference>
<dbReference type="Gramene" id="TraesARI4A03G02215230.2">
    <property type="protein sequence ID" value="TraesARI4A03G02215230.2.CDS1"/>
    <property type="gene ID" value="TraesARI4A03G02215230"/>
</dbReference>
<dbReference type="Gramene" id="TraesARI4A03G02215280.1">
    <property type="protein sequence ID" value="TraesARI4A03G02215280.1.CDS1"/>
    <property type="gene ID" value="TraesARI4A03G02215280"/>
</dbReference>
<dbReference type="Gramene" id="TraesARI4B03G02403600.1">
    <property type="protein sequence ID" value="TraesARI4B03G02403600.1.CDS1"/>
    <property type="gene ID" value="TraesARI4B03G02403600"/>
</dbReference>
<dbReference type="Gramene" id="TraesARI4D03G02565220.1">
    <property type="protein sequence ID" value="TraesARI4D03G02565220.1.CDS1"/>
    <property type="gene ID" value="TraesARI4D03G02565220"/>
</dbReference>
<dbReference type="Gramene" id="TraesARI4D03G02575040.1">
    <property type="protein sequence ID" value="TraesARI4D03G02575040.1.CDS1"/>
    <property type="gene ID" value="TraesARI4D03G02575040"/>
</dbReference>
<dbReference type="Gramene" id="TraesARI5B03G02970110.1">
    <property type="protein sequence ID" value="TraesARI5B03G02970110.1.CDS1"/>
    <property type="gene ID" value="TraesARI5B03G02970110"/>
</dbReference>
<dbReference type="Gramene" id="TraesARI5B03G02970190.1">
    <property type="protein sequence ID" value="TraesARI5B03G02970190.1.CDS1"/>
    <property type="gene ID" value="TraesARI5B03G02970190"/>
</dbReference>
<dbReference type="Gramene" id="TraesARI5B03G02970220.1">
    <property type="protein sequence ID" value="TraesARI5B03G02970220.1.CDS1"/>
    <property type="gene ID" value="TraesARI5B03G02970220"/>
</dbReference>
<dbReference type="Gramene" id="TraesARI5B03G02970360.1">
    <property type="protein sequence ID" value="TraesARI5B03G02970360.1.CDS1"/>
    <property type="gene ID" value="TraesARI5B03G02970360"/>
</dbReference>
<dbReference type="Gramene" id="TraesARI5B03G02970780.1">
    <property type="protein sequence ID" value="TraesARI5B03G02970780.1.CDS1"/>
    <property type="gene ID" value="TraesARI5B03G02970780"/>
</dbReference>
<dbReference type="Gramene" id="TraesARI5D03G03066340.1">
    <property type="protein sequence ID" value="TraesARI5D03G03066340.1.CDS1"/>
    <property type="gene ID" value="TraesARI5D03G03066340"/>
</dbReference>
<dbReference type="Gramene" id="TraesARI6A03G03209470.1">
    <property type="protein sequence ID" value="TraesARI6A03G03209470.1.CDS1"/>
    <property type="gene ID" value="TraesARI6A03G03209470"/>
</dbReference>
<dbReference type="Gramene" id="TraesARI6A03G03210000.1">
    <property type="protein sequence ID" value="TraesARI6A03G03210000.1.CDS1"/>
    <property type="gene ID" value="TraesARI6A03G03210000"/>
</dbReference>
<dbReference type="Gramene" id="TraesARI6A03G03223440.1">
    <property type="protein sequence ID" value="TraesARI6A03G03223440.1.CDS1"/>
    <property type="gene ID" value="TraesARI6A03G03223440"/>
</dbReference>
<dbReference type="Gramene" id="TraesARI6A03G03248190.1">
    <property type="protein sequence ID" value="TraesARI6A03G03248190.1.CDS1"/>
    <property type="gene ID" value="TraesARI6A03G03248190"/>
</dbReference>
<dbReference type="Gramene" id="TraesARI6B03G03405030.1">
    <property type="protein sequence ID" value="TraesARI6B03G03405030.1.CDS1"/>
    <property type="gene ID" value="TraesARI6B03G03405030"/>
</dbReference>
<dbReference type="Gramene" id="TraesARI6B03G03405270.1">
    <property type="protein sequence ID" value="TraesARI6B03G03405270.1.CDS1"/>
    <property type="gene ID" value="TraesARI6B03G03405270"/>
</dbReference>
<dbReference type="Gramene" id="TraesARI6B03G03406180.1">
    <property type="protein sequence ID" value="TraesARI6B03G03406180.1.CDS1"/>
    <property type="gene ID" value="TraesARI6B03G03406180"/>
</dbReference>
<dbReference type="Gramene" id="TraesARI6D03G03626610.1">
    <property type="protein sequence ID" value="TraesARI6D03G03626610.1.CDS1"/>
    <property type="gene ID" value="TraesARI6D03G03626610"/>
</dbReference>
<dbReference type="Gramene" id="TraesARI6D03G03627060.1">
    <property type="protein sequence ID" value="TraesARI6D03G03627060.1.CDS1"/>
    <property type="gene ID" value="TraesARI6D03G03627060"/>
</dbReference>
<dbReference type="Gramene" id="TraesARI6D03G03634630.1">
    <property type="protein sequence ID" value="TraesARI6D03G03634630.1.CDS1"/>
    <property type="gene ID" value="TraesARI6D03G03634630"/>
</dbReference>
<dbReference type="Gramene" id="TraesARI6D03G03656920.1">
    <property type="protein sequence ID" value="TraesARI6D03G03656920.1.CDS1"/>
    <property type="gene ID" value="TraesARI6D03G03656920"/>
</dbReference>
<dbReference type="Gramene" id="TraesARI7A03G03803220.1">
    <property type="protein sequence ID" value="TraesARI7A03G03803220.1.CDS1"/>
    <property type="gene ID" value="TraesARI7A03G03803220"/>
</dbReference>
<dbReference type="Gramene" id="TraesARI7A03G03803220.2">
    <property type="protein sequence ID" value="TraesARI7A03G03803220.2.CDS1"/>
    <property type="gene ID" value="TraesARI7A03G03803220"/>
</dbReference>
<dbReference type="Gramene" id="TraesARI7A03G03803490.1">
    <property type="protein sequence ID" value="TraesARI7A03G03803490.1.CDS1"/>
    <property type="gene ID" value="TraesARI7A03G03803490"/>
</dbReference>
<dbReference type="Gramene" id="TraesARI7A03G03809470.1">
    <property type="protein sequence ID" value="TraesARI7A03G03809470.1.CDS1"/>
    <property type="gene ID" value="TraesARI7A03G03809470"/>
</dbReference>
<dbReference type="Gramene" id="TraesARI7A03G03809670.1">
    <property type="protein sequence ID" value="TraesARI7A03G03809670.1.CDS1"/>
    <property type="gene ID" value="TraesARI7A03G03809670"/>
</dbReference>
<dbReference type="Gramene" id="TraesARI7A03G03809750.1">
    <property type="protein sequence ID" value="TraesARI7A03G03809750.1.CDS1"/>
    <property type="gene ID" value="TraesARI7A03G03809750"/>
</dbReference>
<dbReference type="Gramene" id="TraesARI7A03G03809800.1">
    <property type="protein sequence ID" value="TraesARI7A03G03809800.1.CDS1"/>
    <property type="gene ID" value="TraesARI7A03G03809800"/>
</dbReference>
<dbReference type="Gramene" id="TraesARI7B03G04203700.1">
    <property type="protein sequence ID" value="TraesARI7B03G04203700.1.CDS1"/>
    <property type="gene ID" value="TraesARI7B03G04203700"/>
</dbReference>
<dbReference type="Gramene" id="TraesARI7D03G04378570.1">
    <property type="protein sequence ID" value="TraesARI7D03G04378570.1.CDS1"/>
    <property type="gene ID" value="TraesARI7D03G04378570"/>
</dbReference>
<dbReference type="Gramene" id="TraesARI7D03G04378700.1">
    <property type="protein sequence ID" value="TraesARI7D03G04378700.1.CDS1"/>
    <property type="gene ID" value="TraesARI7D03G04378700"/>
</dbReference>
<dbReference type="Gramene" id="TraesARI7D03G04384590.1">
    <property type="protein sequence ID" value="TraesARI7D03G04384590.1.CDS1"/>
    <property type="gene ID" value="TraesARI7D03G04384590"/>
</dbReference>
<dbReference type="Gramene" id="TraesARI7D03G04384920.1">
    <property type="protein sequence ID" value="TraesARI7D03G04384920.1.CDS1"/>
    <property type="gene ID" value="TraesARI7D03G04384920"/>
</dbReference>
<dbReference type="Gramene" id="TraesARI7D03G04384950.1">
    <property type="protein sequence ID" value="TraesARI7D03G04384950.1.CDS1"/>
    <property type="gene ID" value="TraesARI7D03G04384950"/>
</dbReference>
<dbReference type="Gramene" id="TraesARI7D03G04394050.1">
    <property type="protein sequence ID" value="TraesARI7D03G04394050.1.CDS1"/>
    <property type="gene ID" value="TraesARI7D03G04394050"/>
</dbReference>
<dbReference type="Gramene" id="TraesARIUn03G04578780.1">
    <property type="protein sequence ID" value="TraesARIUn03G04578780.1.CDS1"/>
    <property type="gene ID" value="TraesARIUn03G04578780"/>
</dbReference>
<dbReference type="Gramene" id="TraesARIUn03G04579330.1">
    <property type="protein sequence ID" value="TraesARIUn03G04579330.1.CDS1"/>
    <property type="gene ID" value="TraesARIUn03G04579330"/>
</dbReference>
<dbReference type="Gramene" id="TraesARIUn03G04677270.1">
    <property type="protein sequence ID" value="TraesARIUn03G04677270.1.CDS1"/>
    <property type="gene ID" value="TraesARIUn03G04677270"/>
</dbReference>
<dbReference type="Gramene" id="TraesCAD_scaffold_001025_01G000300.1">
    <property type="protein sequence ID" value="TraesCAD_scaffold_001025_01G000300.1"/>
    <property type="gene ID" value="TraesCAD_scaffold_001025_01G000300"/>
</dbReference>
<dbReference type="Gramene" id="TraesCAD_scaffold_002549_01G000300.1">
    <property type="protein sequence ID" value="TraesCAD_scaffold_002549_01G000300.1"/>
    <property type="gene ID" value="TraesCAD_scaffold_002549_01G000300"/>
</dbReference>
<dbReference type="Gramene" id="TraesCAD_scaffold_002549_01G000400.1">
    <property type="protein sequence ID" value="TraesCAD_scaffold_002549_01G000400.1"/>
    <property type="gene ID" value="TraesCAD_scaffold_002549_01G000400"/>
</dbReference>
<dbReference type="Gramene" id="TraesCAD_scaffold_002549_01G000600.1">
    <property type="protein sequence ID" value="TraesCAD_scaffold_002549_01G000600.1"/>
    <property type="gene ID" value="TraesCAD_scaffold_002549_01G000600"/>
</dbReference>
<dbReference type="Gramene" id="TraesCAD_scaffold_005927_01G000200.1">
    <property type="protein sequence ID" value="TraesCAD_scaffold_005927_01G000200.1"/>
    <property type="gene ID" value="TraesCAD_scaffold_005927_01G000200"/>
</dbReference>
<dbReference type="Gramene" id="TraesCAD_scaffold_008927_01G000100.1">
    <property type="protein sequence ID" value="TraesCAD_scaffold_008927_01G000100.1"/>
    <property type="gene ID" value="TraesCAD_scaffold_008927_01G000100"/>
</dbReference>
<dbReference type="Gramene" id="TraesCAD_scaffold_009704_01G000400.1">
    <property type="protein sequence ID" value="TraesCAD_scaffold_009704_01G000400.1"/>
    <property type="gene ID" value="TraesCAD_scaffold_009704_01G000400"/>
</dbReference>
<dbReference type="Gramene" id="TraesCAD_scaffold_010565_01G000100.1">
    <property type="protein sequence ID" value="TraesCAD_scaffold_010565_01G000100.1"/>
    <property type="gene ID" value="TraesCAD_scaffold_010565_01G000100"/>
</dbReference>
<dbReference type="Gramene" id="TraesCAD_scaffold_010565_01G000300.1">
    <property type="protein sequence ID" value="TraesCAD_scaffold_010565_01G000300.1"/>
    <property type="gene ID" value="TraesCAD_scaffold_010565_01G000300"/>
</dbReference>
<dbReference type="Gramene" id="TraesCAD_scaffold_010565_01G000800.1">
    <property type="protein sequence ID" value="TraesCAD_scaffold_010565_01G000800.1"/>
    <property type="gene ID" value="TraesCAD_scaffold_010565_01G000800"/>
</dbReference>
<dbReference type="Gramene" id="TraesCAD_scaffold_011347_01G000100.1">
    <property type="protein sequence ID" value="TraesCAD_scaffold_011347_01G000100.1"/>
    <property type="gene ID" value="TraesCAD_scaffold_011347_01G000100"/>
</dbReference>
<dbReference type="Gramene" id="TraesCAD_scaffold_011504_01G000700.1">
    <property type="protein sequence ID" value="TraesCAD_scaffold_011504_01G000700.1"/>
    <property type="gene ID" value="TraesCAD_scaffold_011504_01G000700"/>
</dbReference>
<dbReference type="Gramene" id="TraesCAD_scaffold_013930_01G000100.1">
    <property type="protein sequence ID" value="TraesCAD_scaffold_013930_01G000100.1"/>
    <property type="gene ID" value="TraesCAD_scaffold_013930_01G000100"/>
</dbReference>
<dbReference type="Gramene" id="TraesCAD_scaffold_014376_01G000100.1">
    <property type="protein sequence ID" value="TraesCAD_scaffold_014376_01G000100.1"/>
    <property type="gene ID" value="TraesCAD_scaffold_014376_01G000100"/>
</dbReference>
<dbReference type="Gramene" id="TraesCAD_scaffold_014839_01G000100.1">
    <property type="protein sequence ID" value="TraesCAD_scaffold_014839_01G000100.1"/>
    <property type="gene ID" value="TraesCAD_scaffold_014839_01G000100"/>
</dbReference>
<dbReference type="Gramene" id="TraesCAD_scaffold_015649_01G000400.1">
    <property type="protein sequence ID" value="TraesCAD_scaffold_015649_01G000400.1"/>
    <property type="gene ID" value="TraesCAD_scaffold_015649_01G000400"/>
</dbReference>
<dbReference type="Gramene" id="TraesCAD_scaffold_016721_01G000300.1">
    <property type="protein sequence ID" value="TraesCAD_scaffold_016721_01G000300.1"/>
    <property type="gene ID" value="TraesCAD_scaffold_016721_01G000300"/>
</dbReference>
<dbReference type="Gramene" id="TraesCAD_scaffold_019539_01G000100.1">
    <property type="protein sequence ID" value="TraesCAD_scaffold_019539_01G000100.1"/>
    <property type="gene ID" value="TraesCAD_scaffold_019539_01G000100"/>
</dbReference>
<dbReference type="Gramene" id="TraesCAD_scaffold_021360_01G000400.1">
    <property type="protein sequence ID" value="TraesCAD_scaffold_021360_01G000400.1"/>
    <property type="gene ID" value="TraesCAD_scaffold_021360_01G000400"/>
</dbReference>
<dbReference type="Gramene" id="TraesCAD_scaffold_021489_01G000100.1">
    <property type="protein sequence ID" value="TraesCAD_scaffold_021489_01G000100.1"/>
    <property type="gene ID" value="TraesCAD_scaffold_021489_01G000100"/>
</dbReference>
<dbReference type="Gramene" id="TraesCAD_scaffold_021743_01G000500.1">
    <property type="protein sequence ID" value="TraesCAD_scaffold_021743_01G000500.1"/>
    <property type="gene ID" value="TraesCAD_scaffold_021743_01G000500"/>
</dbReference>
<dbReference type="Gramene" id="TraesCAD_scaffold_022925_01G000100.1">
    <property type="protein sequence ID" value="TraesCAD_scaffold_022925_01G000100.1"/>
    <property type="gene ID" value="TraesCAD_scaffold_022925_01G000100"/>
</dbReference>
<dbReference type="Gramene" id="TraesCAD_scaffold_025516_01G000100.1">
    <property type="protein sequence ID" value="TraesCAD_scaffold_025516_01G000100.1"/>
    <property type="gene ID" value="TraesCAD_scaffold_025516_01G000100"/>
</dbReference>
<dbReference type="Gramene" id="TraesCAD_scaffold_026713_01G000100.1">
    <property type="protein sequence ID" value="TraesCAD_scaffold_026713_01G000100.1"/>
    <property type="gene ID" value="TraesCAD_scaffold_026713_01G000100"/>
</dbReference>
<dbReference type="Gramene" id="TraesCAD_scaffold_026713_01G000300.1">
    <property type="protein sequence ID" value="TraesCAD_scaffold_026713_01G000300.1"/>
    <property type="gene ID" value="TraesCAD_scaffold_026713_01G000300"/>
</dbReference>
<dbReference type="Gramene" id="TraesCAD_scaffold_028116_01G000700.1">
    <property type="protein sequence ID" value="TraesCAD_scaffold_028116_01G000700.1"/>
    <property type="gene ID" value="TraesCAD_scaffold_028116_01G000700"/>
</dbReference>
<dbReference type="Gramene" id="TraesCAD_scaffold_030272_01G000300.1">
    <property type="protein sequence ID" value="TraesCAD_scaffold_030272_01G000300.1"/>
    <property type="gene ID" value="TraesCAD_scaffold_030272_01G000300"/>
</dbReference>
<dbReference type="Gramene" id="TraesCAD_scaffold_030701_01G000100.1">
    <property type="protein sequence ID" value="TraesCAD_scaffold_030701_01G000100.1"/>
    <property type="gene ID" value="TraesCAD_scaffold_030701_01G000100"/>
</dbReference>
<dbReference type="Gramene" id="TraesCAD_scaffold_031902_01G000200.1">
    <property type="protein sequence ID" value="TraesCAD_scaffold_031902_01G000200.1"/>
    <property type="gene ID" value="TraesCAD_scaffold_031902_01G000200"/>
</dbReference>
<dbReference type="Gramene" id="TraesCAD_scaffold_031902_01G000400.1">
    <property type="protein sequence ID" value="TraesCAD_scaffold_031902_01G000400.1"/>
    <property type="gene ID" value="TraesCAD_scaffold_031902_01G000400"/>
</dbReference>
<dbReference type="Gramene" id="TraesCAD_scaffold_035590_01G000100.1">
    <property type="protein sequence ID" value="TraesCAD_scaffold_035590_01G000100.1"/>
    <property type="gene ID" value="TraesCAD_scaffold_035590_01G000100"/>
</dbReference>
<dbReference type="Gramene" id="TraesCAD_scaffold_039512_01G000500.1">
    <property type="protein sequence ID" value="TraesCAD_scaffold_039512_01G000500.1"/>
    <property type="gene ID" value="TraesCAD_scaffold_039512_01G000500"/>
</dbReference>
<dbReference type="Gramene" id="TraesCAD_scaffold_040244_01G000200.1">
    <property type="protein sequence ID" value="TraesCAD_scaffold_040244_01G000200.1"/>
    <property type="gene ID" value="TraesCAD_scaffold_040244_01G000200"/>
</dbReference>
<dbReference type="Gramene" id="TraesCAD_scaffold_042577_01G000200.1">
    <property type="protein sequence ID" value="TraesCAD_scaffold_042577_01G000200.1"/>
    <property type="gene ID" value="TraesCAD_scaffold_042577_01G000200"/>
</dbReference>
<dbReference type="Gramene" id="TraesCAD_scaffold_044367_01G000200.1">
    <property type="protein sequence ID" value="TraesCAD_scaffold_044367_01G000200.1"/>
    <property type="gene ID" value="TraesCAD_scaffold_044367_01G000200"/>
</dbReference>
<dbReference type="Gramene" id="TraesCAD_scaffold_044661_01G000400.1">
    <property type="protein sequence ID" value="TraesCAD_scaffold_044661_01G000400.1"/>
    <property type="gene ID" value="TraesCAD_scaffold_044661_01G000400"/>
</dbReference>
<dbReference type="Gramene" id="TraesCAD_scaffold_045746_01G000100.1">
    <property type="protein sequence ID" value="TraesCAD_scaffold_045746_01G000100.1"/>
    <property type="gene ID" value="TraesCAD_scaffold_045746_01G000100"/>
</dbReference>
<dbReference type="Gramene" id="TraesCAD_scaffold_046126_01G000200.1">
    <property type="protein sequence ID" value="TraesCAD_scaffold_046126_01G000200.1"/>
    <property type="gene ID" value="TraesCAD_scaffold_046126_01G000200"/>
</dbReference>
<dbReference type="Gramene" id="TraesCAD_scaffold_049454_01G000200.1">
    <property type="protein sequence ID" value="TraesCAD_scaffold_049454_01G000200.1"/>
    <property type="gene ID" value="TraesCAD_scaffold_049454_01G000200"/>
</dbReference>
<dbReference type="Gramene" id="TraesCAD_scaffold_053170_01G000400.1">
    <property type="protein sequence ID" value="TraesCAD_scaffold_053170_01G000400.1"/>
    <property type="gene ID" value="TraesCAD_scaffold_053170_01G000400"/>
</dbReference>
<dbReference type="Gramene" id="TraesCAD_scaffold_057498_01G000900.1">
    <property type="protein sequence ID" value="TraesCAD_scaffold_057498_01G000900.1"/>
    <property type="gene ID" value="TraesCAD_scaffold_057498_01G000900"/>
</dbReference>
<dbReference type="Gramene" id="TraesCAD_scaffold_057498_01G001000.1">
    <property type="protein sequence ID" value="TraesCAD_scaffold_057498_01G001000.1"/>
    <property type="gene ID" value="TraesCAD_scaffold_057498_01G001000"/>
</dbReference>
<dbReference type="Gramene" id="TraesCAD_scaffold_058042_01G000100.1">
    <property type="protein sequence ID" value="TraesCAD_scaffold_058042_01G000100.1"/>
    <property type="gene ID" value="TraesCAD_scaffold_058042_01G000100"/>
</dbReference>
<dbReference type="Gramene" id="TraesCAD_scaffold_064560_01G000100.1">
    <property type="protein sequence ID" value="TraesCAD_scaffold_064560_01G000100.1"/>
    <property type="gene ID" value="TraesCAD_scaffold_064560_01G000100"/>
</dbReference>
<dbReference type="Gramene" id="TraesCAD_scaffold_065917_01G000300.1">
    <property type="protein sequence ID" value="TraesCAD_scaffold_065917_01G000300.1"/>
    <property type="gene ID" value="TraesCAD_scaffold_065917_01G000300"/>
</dbReference>
<dbReference type="Gramene" id="TraesCAD_scaffold_066405_01G000100.1">
    <property type="protein sequence ID" value="TraesCAD_scaffold_066405_01G000100.1"/>
    <property type="gene ID" value="TraesCAD_scaffold_066405_01G000100"/>
</dbReference>
<dbReference type="Gramene" id="TraesCAD_scaffold_067137_01G000300.1">
    <property type="protein sequence ID" value="TraesCAD_scaffold_067137_01G000300.1"/>
    <property type="gene ID" value="TraesCAD_scaffold_067137_01G000300"/>
</dbReference>
<dbReference type="Gramene" id="TraesCAD_scaffold_071601_01G000200.1">
    <property type="protein sequence ID" value="TraesCAD_scaffold_071601_01G000200.1"/>
    <property type="gene ID" value="TraesCAD_scaffold_071601_01G000200"/>
</dbReference>
<dbReference type="Gramene" id="TraesCAD_scaffold_072141_01G000100.1">
    <property type="protein sequence ID" value="TraesCAD_scaffold_072141_01G000100.1"/>
    <property type="gene ID" value="TraesCAD_scaffold_072141_01G000100"/>
</dbReference>
<dbReference type="Gramene" id="TraesCAD_scaffold_073280_01G000300.1">
    <property type="protein sequence ID" value="TraesCAD_scaffold_073280_01G000300.1"/>
    <property type="gene ID" value="TraesCAD_scaffold_073280_01G000300"/>
</dbReference>
<dbReference type="Gramene" id="TraesCAD_scaffold_075736_01G000100.1">
    <property type="protein sequence ID" value="TraesCAD_scaffold_075736_01G000100.1"/>
    <property type="gene ID" value="TraesCAD_scaffold_075736_01G000100"/>
</dbReference>
<dbReference type="Gramene" id="TraesCAD_scaffold_077570_01G000100.1">
    <property type="protein sequence ID" value="TraesCAD_scaffold_077570_01G000100.1"/>
    <property type="gene ID" value="TraesCAD_scaffold_077570_01G000100"/>
</dbReference>
<dbReference type="Gramene" id="TraesCAD_scaffold_081807_01G000300.1">
    <property type="protein sequence ID" value="TraesCAD_scaffold_081807_01G000300.1"/>
    <property type="gene ID" value="TraesCAD_scaffold_081807_01G000300"/>
</dbReference>
<dbReference type="Gramene" id="TraesCAD_scaffold_084462_01G000200.1">
    <property type="protein sequence ID" value="TraesCAD_scaffold_084462_01G000200.1"/>
    <property type="gene ID" value="TraesCAD_scaffold_084462_01G000200"/>
</dbReference>
<dbReference type="Gramene" id="TraesCAD_scaffold_088168_01G000100.1">
    <property type="protein sequence ID" value="TraesCAD_scaffold_088168_01G000100.1"/>
    <property type="gene ID" value="TraesCAD_scaffold_088168_01G000100"/>
</dbReference>
<dbReference type="Gramene" id="TraesCAD_scaffold_099250_01G000100.1">
    <property type="protein sequence ID" value="TraesCAD_scaffold_099250_01G000100.1"/>
    <property type="gene ID" value="TraesCAD_scaffold_099250_01G000100"/>
</dbReference>
<dbReference type="Gramene" id="TraesCAD_scaffold_100956_01G000500.1">
    <property type="protein sequence ID" value="TraesCAD_scaffold_100956_01G000500.1"/>
    <property type="gene ID" value="TraesCAD_scaffold_100956_01G000500"/>
</dbReference>
<dbReference type="Gramene" id="TraesCAD_scaffold_103447_01G000100.1">
    <property type="protein sequence ID" value="TraesCAD_scaffold_103447_01G000100.1"/>
    <property type="gene ID" value="TraesCAD_scaffold_103447_01G000100"/>
</dbReference>
<dbReference type="Gramene" id="TraesCAD_scaffold_103872_01G000100.1">
    <property type="protein sequence ID" value="TraesCAD_scaffold_103872_01G000100.1"/>
    <property type="gene ID" value="TraesCAD_scaffold_103872_01G000100"/>
</dbReference>
<dbReference type="Gramene" id="TraesCAD_scaffold_108730_01G000200.1">
    <property type="protein sequence ID" value="TraesCAD_scaffold_108730_01G000200.1"/>
    <property type="gene ID" value="TraesCAD_scaffold_108730_01G000200"/>
</dbReference>
<dbReference type="Gramene" id="TraesCAD_scaffold_111688_01G000100.1">
    <property type="protein sequence ID" value="TraesCAD_scaffold_111688_01G000100.1"/>
    <property type="gene ID" value="TraesCAD_scaffold_111688_01G000100"/>
</dbReference>
<dbReference type="Gramene" id="TraesCAD_scaffold_116866_01G000100.1">
    <property type="protein sequence ID" value="TraesCAD_scaffold_116866_01G000100.1"/>
    <property type="gene ID" value="TraesCAD_scaffold_116866_01G000100"/>
</dbReference>
<dbReference type="Gramene" id="TraesCAD_scaffold_126079_01G000200.1">
    <property type="protein sequence ID" value="TraesCAD_scaffold_126079_01G000200.1"/>
    <property type="gene ID" value="TraesCAD_scaffold_126079_01G000200"/>
</dbReference>
<dbReference type="Gramene" id="TraesCAD_scaffold_132006_01G000300.1">
    <property type="protein sequence ID" value="TraesCAD_scaffold_132006_01G000300.1"/>
    <property type="gene ID" value="TraesCAD_scaffold_132006_01G000300"/>
</dbReference>
<dbReference type="Gramene" id="TraesCAD_scaffold_163106_01G000100.1">
    <property type="protein sequence ID" value="TraesCAD_scaffold_163106_01G000100.1"/>
    <property type="gene ID" value="TraesCAD_scaffold_163106_01G000100"/>
</dbReference>
<dbReference type="Gramene" id="TraesCLE_scaffold_002827_01G000200.1">
    <property type="protein sequence ID" value="TraesCLE_scaffold_002827_01G000200.1"/>
    <property type="gene ID" value="TraesCLE_scaffold_002827_01G000200"/>
</dbReference>
<dbReference type="Gramene" id="TraesCLE_scaffold_007908_01G000200.1">
    <property type="protein sequence ID" value="TraesCLE_scaffold_007908_01G000200.1"/>
    <property type="gene ID" value="TraesCLE_scaffold_007908_01G000200"/>
</dbReference>
<dbReference type="Gramene" id="TraesCLE_scaffold_008175_01G000100.1">
    <property type="protein sequence ID" value="TraesCLE_scaffold_008175_01G000100.1"/>
    <property type="gene ID" value="TraesCLE_scaffold_008175_01G000100"/>
</dbReference>
<dbReference type="Gramene" id="TraesCLE_scaffold_008175_01G000200.1">
    <property type="protein sequence ID" value="TraesCLE_scaffold_008175_01G000200.1"/>
    <property type="gene ID" value="TraesCLE_scaffold_008175_01G000200"/>
</dbReference>
<dbReference type="Gramene" id="TraesCLE_scaffold_008711_01G000200.1">
    <property type="protein sequence ID" value="TraesCLE_scaffold_008711_01G000200.1"/>
    <property type="gene ID" value="TraesCLE_scaffold_008711_01G000200"/>
</dbReference>
<dbReference type="Gramene" id="TraesCLE_scaffold_010450_01G000700.1">
    <property type="protein sequence ID" value="TraesCLE_scaffold_010450_01G000700.1"/>
    <property type="gene ID" value="TraesCLE_scaffold_010450_01G000700"/>
</dbReference>
<dbReference type="Gramene" id="TraesCLE_scaffold_010583_01G000100.1">
    <property type="protein sequence ID" value="TraesCLE_scaffold_010583_01G000100.1"/>
    <property type="gene ID" value="TraesCLE_scaffold_010583_01G000100"/>
</dbReference>
<dbReference type="Gramene" id="TraesCLE_scaffold_010671_01G000200.1">
    <property type="protein sequence ID" value="TraesCLE_scaffold_010671_01G000200.1"/>
    <property type="gene ID" value="TraesCLE_scaffold_010671_01G000200"/>
</dbReference>
<dbReference type="Gramene" id="TraesCLE_scaffold_010671_01G000400.1">
    <property type="protein sequence ID" value="TraesCLE_scaffold_010671_01G000400.1"/>
    <property type="gene ID" value="TraesCLE_scaffold_010671_01G000400"/>
</dbReference>
<dbReference type="Gramene" id="TraesCLE_scaffold_010918_01G000900.1">
    <property type="protein sequence ID" value="TraesCLE_scaffold_010918_01G000900.1"/>
    <property type="gene ID" value="TraesCLE_scaffold_010918_01G000900"/>
</dbReference>
<dbReference type="Gramene" id="TraesCLE_scaffold_010918_01G001400.1">
    <property type="protein sequence ID" value="TraesCLE_scaffold_010918_01G001400.1"/>
    <property type="gene ID" value="TraesCLE_scaffold_010918_01G001400"/>
</dbReference>
<dbReference type="Gramene" id="TraesCLE_scaffold_011201_01G000100.1">
    <property type="protein sequence ID" value="TraesCLE_scaffold_011201_01G000100.1"/>
    <property type="gene ID" value="TraesCLE_scaffold_011201_01G000100"/>
</dbReference>
<dbReference type="Gramene" id="TraesCLE_scaffold_014717_01G000100.1">
    <property type="protein sequence ID" value="TraesCLE_scaffold_014717_01G000100.1"/>
    <property type="gene ID" value="TraesCLE_scaffold_014717_01G000100"/>
</dbReference>
<dbReference type="Gramene" id="TraesCLE_scaffold_015525_01G000500.1">
    <property type="protein sequence ID" value="TraesCLE_scaffold_015525_01G000500.1"/>
    <property type="gene ID" value="TraesCLE_scaffold_015525_01G000500"/>
</dbReference>
<dbReference type="Gramene" id="TraesCLE_scaffold_016509_01G000500.1">
    <property type="protein sequence ID" value="TraesCLE_scaffold_016509_01G000500.1"/>
    <property type="gene ID" value="TraesCLE_scaffold_016509_01G000500"/>
</dbReference>
<dbReference type="Gramene" id="TraesCLE_scaffold_019691_01G000300.1">
    <property type="protein sequence ID" value="TraesCLE_scaffold_019691_01G000300.1"/>
    <property type="gene ID" value="TraesCLE_scaffold_019691_01G000300"/>
</dbReference>
<dbReference type="Gramene" id="TraesCLE_scaffold_021386_01G000100.1">
    <property type="protein sequence ID" value="TraesCLE_scaffold_021386_01G000100.1"/>
    <property type="gene ID" value="TraesCLE_scaffold_021386_01G000100"/>
</dbReference>
<dbReference type="Gramene" id="TraesCLE_scaffold_028120_01G000200.1">
    <property type="protein sequence ID" value="TraesCLE_scaffold_028120_01G000200.1"/>
    <property type="gene ID" value="TraesCLE_scaffold_028120_01G000200"/>
</dbReference>
<dbReference type="Gramene" id="TraesCLE_scaffold_033029_01G000200.1">
    <property type="protein sequence ID" value="TraesCLE_scaffold_033029_01G000200.1"/>
    <property type="gene ID" value="TraesCLE_scaffold_033029_01G000200"/>
</dbReference>
<dbReference type="Gramene" id="TraesCLE_scaffold_034092_01G000200.1">
    <property type="protein sequence ID" value="TraesCLE_scaffold_034092_01G000200.1"/>
    <property type="gene ID" value="TraesCLE_scaffold_034092_01G000200"/>
</dbReference>
<dbReference type="Gramene" id="TraesCLE_scaffold_034489_01G000200.1">
    <property type="protein sequence ID" value="TraesCLE_scaffold_034489_01G000200.1"/>
    <property type="gene ID" value="TraesCLE_scaffold_034489_01G000200"/>
</dbReference>
<dbReference type="Gramene" id="TraesCLE_scaffold_034727_01G000100.1">
    <property type="protein sequence ID" value="TraesCLE_scaffold_034727_01G000100.1"/>
    <property type="gene ID" value="TraesCLE_scaffold_034727_01G000100"/>
</dbReference>
<dbReference type="Gramene" id="TraesCLE_scaffold_038040_01G000100.1">
    <property type="protein sequence ID" value="TraesCLE_scaffold_038040_01G000100.1"/>
    <property type="gene ID" value="TraesCLE_scaffold_038040_01G000100"/>
</dbReference>
<dbReference type="Gramene" id="TraesCLE_scaffold_045698_01G000400.1">
    <property type="protein sequence ID" value="TraesCLE_scaffold_045698_01G000400.1"/>
    <property type="gene ID" value="TraesCLE_scaffold_045698_01G000400"/>
</dbReference>
<dbReference type="Gramene" id="TraesCLE_scaffold_047276_01G000400.1">
    <property type="protein sequence ID" value="TraesCLE_scaffold_047276_01G000400.1"/>
    <property type="gene ID" value="TraesCLE_scaffold_047276_01G000400"/>
</dbReference>
<dbReference type="Gramene" id="TraesCLE_scaffold_048960_01G000300.1">
    <property type="protein sequence ID" value="TraesCLE_scaffold_048960_01G000300.1"/>
    <property type="gene ID" value="TraesCLE_scaffold_048960_01G000300"/>
</dbReference>
<dbReference type="Gramene" id="TraesCLE_scaffold_049505_01G000300.1">
    <property type="protein sequence ID" value="TraesCLE_scaffold_049505_01G000300.1"/>
    <property type="gene ID" value="TraesCLE_scaffold_049505_01G000300"/>
</dbReference>
<dbReference type="Gramene" id="TraesCLE_scaffold_051652_01G000100.1">
    <property type="protein sequence ID" value="TraesCLE_scaffold_051652_01G000100.1"/>
    <property type="gene ID" value="TraesCLE_scaffold_051652_01G000100"/>
</dbReference>
<dbReference type="Gramene" id="TraesCLE_scaffold_053744_01G000200.1">
    <property type="protein sequence ID" value="TraesCLE_scaffold_053744_01G000200.1"/>
    <property type="gene ID" value="TraesCLE_scaffold_053744_01G000200"/>
</dbReference>
<dbReference type="Gramene" id="TraesCLE_scaffold_053928_01G000300.1">
    <property type="protein sequence ID" value="TraesCLE_scaffold_053928_01G000300.1"/>
    <property type="gene ID" value="TraesCLE_scaffold_053928_01G000300"/>
</dbReference>
<dbReference type="Gramene" id="TraesCLE_scaffold_056606_01G000100.1">
    <property type="protein sequence ID" value="TraesCLE_scaffold_056606_01G000100.1"/>
    <property type="gene ID" value="TraesCLE_scaffold_056606_01G000100"/>
</dbReference>
<dbReference type="Gramene" id="TraesCLE_scaffold_057935_01G000200.1">
    <property type="protein sequence ID" value="TraesCLE_scaffold_057935_01G000200.1"/>
    <property type="gene ID" value="TraesCLE_scaffold_057935_01G000200"/>
</dbReference>
<dbReference type="Gramene" id="TraesCLE_scaffold_059342_01G000200.1">
    <property type="protein sequence ID" value="TraesCLE_scaffold_059342_01G000200.1"/>
    <property type="gene ID" value="TraesCLE_scaffold_059342_01G000200"/>
</dbReference>
<dbReference type="Gramene" id="TraesCLE_scaffold_061335_01G000200.1">
    <property type="protein sequence ID" value="TraesCLE_scaffold_061335_01G000200.1"/>
    <property type="gene ID" value="TraesCLE_scaffold_061335_01G000200"/>
</dbReference>
<dbReference type="Gramene" id="TraesCLE_scaffold_062064_01G000100.1">
    <property type="protein sequence ID" value="TraesCLE_scaffold_062064_01G000100.1"/>
    <property type="gene ID" value="TraesCLE_scaffold_062064_01G000100"/>
</dbReference>
<dbReference type="Gramene" id="TraesCLE_scaffold_062064_01G000300.1">
    <property type="protein sequence ID" value="TraesCLE_scaffold_062064_01G000300.1"/>
    <property type="gene ID" value="TraesCLE_scaffold_062064_01G000300"/>
</dbReference>
<dbReference type="Gramene" id="TraesCLE_scaffold_063806_01G000500.1">
    <property type="protein sequence ID" value="TraesCLE_scaffold_063806_01G000500.1"/>
    <property type="gene ID" value="TraesCLE_scaffold_063806_01G000500"/>
</dbReference>
<dbReference type="Gramene" id="TraesCLE_scaffold_065545_01G000200.1">
    <property type="protein sequence ID" value="TraesCLE_scaffold_065545_01G000200.1"/>
    <property type="gene ID" value="TraesCLE_scaffold_065545_01G000200"/>
</dbReference>
<dbReference type="Gramene" id="TraesCLE_scaffold_067323_01G000100.1">
    <property type="protein sequence ID" value="TraesCLE_scaffold_067323_01G000100.1"/>
    <property type="gene ID" value="TraesCLE_scaffold_067323_01G000100"/>
</dbReference>
<dbReference type="Gramene" id="TraesCLE_scaffold_067953_01G000200.1">
    <property type="protein sequence ID" value="TraesCLE_scaffold_067953_01G000200.1"/>
    <property type="gene ID" value="TraesCLE_scaffold_067953_01G000200"/>
</dbReference>
<dbReference type="Gramene" id="TraesCLE_scaffold_068651_01G000400.1">
    <property type="protein sequence ID" value="TraesCLE_scaffold_068651_01G000400.1"/>
    <property type="gene ID" value="TraesCLE_scaffold_068651_01G000400"/>
</dbReference>
<dbReference type="Gramene" id="TraesCLE_scaffold_070852_01G000400.1">
    <property type="protein sequence ID" value="TraesCLE_scaffold_070852_01G000400.1"/>
    <property type="gene ID" value="TraesCLE_scaffold_070852_01G000400"/>
</dbReference>
<dbReference type="Gramene" id="TraesCLE_scaffold_075981_01G000100.1">
    <property type="protein sequence ID" value="TraesCLE_scaffold_075981_01G000100.1"/>
    <property type="gene ID" value="TraesCLE_scaffold_075981_01G000100"/>
</dbReference>
<dbReference type="Gramene" id="TraesCLE_scaffold_078290_01G000100.1">
    <property type="protein sequence ID" value="TraesCLE_scaffold_078290_01G000100.1"/>
    <property type="gene ID" value="TraesCLE_scaffold_078290_01G000100"/>
</dbReference>
<dbReference type="Gramene" id="TraesCLE_scaffold_079796_01G000100.1">
    <property type="protein sequence ID" value="TraesCLE_scaffold_079796_01G000100.1"/>
    <property type="gene ID" value="TraesCLE_scaffold_079796_01G000100"/>
</dbReference>
<dbReference type="Gramene" id="TraesCLE_scaffold_083702_01G000100.1">
    <property type="protein sequence ID" value="TraesCLE_scaffold_083702_01G000100.1"/>
    <property type="gene ID" value="TraesCLE_scaffold_083702_01G000100"/>
</dbReference>
<dbReference type="Gramene" id="TraesCLE_scaffold_091244_01G000100.1">
    <property type="protein sequence ID" value="TraesCLE_scaffold_091244_01G000100.1"/>
    <property type="gene ID" value="TraesCLE_scaffold_091244_01G000100"/>
</dbReference>
<dbReference type="Gramene" id="TraesCLE_scaffold_092025_01G000400.1">
    <property type="protein sequence ID" value="TraesCLE_scaffold_092025_01G000400.1"/>
    <property type="gene ID" value="TraesCLE_scaffold_092025_01G000400"/>
</dbReference>
<dbReference type="Gramene" id="TraesCLE_scaffold_092123_01G000100.1">
    <property type="protein sequence ID" value="TraesCLE_scaffold_092123_01G000100.1"/>
    <property type="gene ID" value="TraesCLE_scaffold_092123_01G000100"/>
</dbReference>
<dbReference type="Gramene" id="TraesCLE_scaffold_100110_01G000500.1">
    <property type="protein sequence ID" value="TraesCLE_scaffold_100110_01G000500.1"/>
    <property type="gene ID" value="TraesCLE_scaffold_100110_01G000500"/>
</dbReference>
<dbReference type="Gramene" id="TraesCLE_scaffold_100354_01G000100.1">
    <property type="protein sequence ID" value="TraesCLE_scaffold_100354_01G000100.1"/>
    <property type="gene ID" value="TraesCLE_scaffold_100354_01G000100"/>
</dbReference>
<dbReference type="Gramene" id="TraesCLE_scaffold_103056_01G000200.1">
    <property type="protein sequence ID" value="TraesCLE_scaffold_103056_01G000200.1"/>
    <property type="gene ID" value="TraesCLE_scaffold_103056_01G000200"/>
</dbReference>
<dbReference type="Gramene" id="TraesCLE_scaffold_104197_01G000300.1">
    <property type="protein sequence ID" value="TraesCLE_scaffold_104197_01G000300.1"/>
    <property type="gene ID" value="TraesCLE_scaffold_104197_01G000300"/>
</dbReference>
<dbReference type="Gramene" id="TraesCLE_scaffold_110998_01G000100.1">
    <property type="protein sequence ID" value="TraesCLE_scaffold_110998_01G000100.1"/>
    <property type="gene ID" value="TraesCLE_scaffold_110998_01G000100"/>
</dbReference>
<dbReference type="Gramene" id="TraesCLE_scaffold_111321_01G000200.1">
    <property type="protein sequence ID" value="TraesCLE_scaffold_111321_01G000200.1"/>
    <property type="gene ID" value="TraesCLE_scaffold_111321_01G000200"/>
</dbReference>
<dbReference type="Gramene" id="TraesCLE_scaffold_113502_01G000100.1">
    <property type="protein sequence ID" value="TraesCLE_scaffold_113502_01G000100.1"/>
    <property type="gene ID" value="TraesCLE_scaffold_113502_01G000100"/>
</dbReference>
<dbReference type="Gramene" id="TraesCLE_scaffold_118117_01G000100.1">
    <property type="protein sequence ID" value="TraesCLE_scaffold_118117_01G000100.1"/>
    <property type="gene ID" value="TraesCLE_scaffold_118117_01G000100"/>
</dbReference>
<dbReference type="Gramene" id="TraesCLE_scaffold_121000_01G000100.1">
    <property type="protein sequence ID" value="TraesCLE_scaffold_121000_01G000100.1"/>
    <property type="gene ID" value="TraesCLE_scaffold_121000_01G000100"/>
</dbReference>
<dbReference type="Gramene" id="TraesCLE_scaffold_140986_01G000100.1">
    <property type="protein sequence ID" value="TraesCLE_scaffold_140986_01G000100.1"/>
    <property type="gene ID" value="TraesCLE_scaffold_140986_01G000100"/>
</dbReference>
<dbReference type="Gramene" id="TraesCLE_scaffold_145718_01G000300.1">
    <property type="protein sequence ID" value="TraesCLE_scaffold_145718_01G000300.1"/>
    <property type="gene ID" value="TraesCLE_scaffold_145718_01G000300"/>
</dbReference>
<dbReference type="Gramene" id="TraesCLE_scaffold_157453_01G000100.1">
    <property type="protein sequence ID" value="TraesCLE_scaffold_157453_01G000100.1"/>
    <property type="gene ID" value="TraesCLE_scaffold_157453_01G000100"/>
</dbReference>
<dbReference type="Gramene" id="TraesCLE_scaffold_162569_01G000200.1">
    <property type="protein sequence ID" value="TraesCLE_scaffold_162569_01G000200.1"/>
    <property type="gene ID" value="TraesCLE_scaffold_162569_01G000200"/>
</dbReference>
<dbReference type="Gramene" id="TraesCLE_scaffold_167077_01G000200.1">
    <property type="protein sequence ID" value="TraesCLE_scaffold_167077_01G000200.1"/>
    <property type="gene ID" value="TraesCLE_scaffold_167077_01G000200"/>
</dbReference>
<dbReference type="Gramene" id="TraesCLE_scaffold_172735_01G000100.1">
    <property type="protein sequence ID" value="TraesCLE_scaffold_172735_01G000100.1"/>
    <property type="gene ID" value="TraesCLE_scaffold_172735_01G000100"/>
</dbReference>
<dbReference type="Gramene" id="TraesCLE_scaffold_177996_01G000100.1">
    <property type="protein sequence ID" value="TraesCLE_scaffold_177996_01G000100.1"/>
    <property type="gene ID" value="TraesCLE_scaffold_177996_01G000100"/>
</dbReference>
<dbReference type="Gramene" id="TraesCS1A02G229000.1">
    <property type="protein sequence ID" value="TraesCS1A02G229000.1.cds1"/>
    <property type="gene ID" value="TraesCS1A02G229000"/>
</dbReference>
<dbReference type="Gramene" id="TraesCS1A02G261900.1">
    <property type="protein sequence ID" value="TraesCS1A02G261900.1.cds1"/>
    <property type="gene ID" value="TraesCS1A02G261900"/>
</dbReference>
<dbReference type="Gramene" id="TraesCS1A02G274300.1">
    <property type="protein sequence ID" value="TraesCS1A02G274300.1.cds1"/>
    <property type="gene ID" value="TraesCS1A02G274300"/>
</dbReference>
<dbReference type="Gramene" id="TraesCS1A02G359800.1">
    <property type="protein sequence ID" value="TraesCS1A02G359800.1.cds1"/>
    <property type="gene ID" value="TraesCS1A02G359800"/>
</dbReference>
<dbReference type="Gramene" id="TraesCS1A02G360200.1">
    <property type="protein sequence ID" value="TraesCS1A02G360200.1.cds1"/>
    <property type="gene ID" value="TraesCS1A02G360200"/>
</dbReference>
<dbReference type="Gramene" id="TraesCS1A02G361900.1">
    <property type="protein sequence ID" value="TraesCS1A02G361900.1.cds1"/>
    <property type="gene ID" value="TraesCS1A02G361900"/>
</dbReference>
<dbReference type="Gramene" id="TraesCS1A03G0596000.1">
    <property type="protein sequence ID" value="TraesCS1A03G0596000.1.CDS1"/>
    <property type="gene ID" value="TraesCS1A03G0596000"/>
</dbReference>
<dbReference type="Gramene" id="TraesCS1A03G0669000.1">
    <property type="protein sequence ID" value="TraesCS1A03G0669000.1.CDS1"/>
    <property type="gene ID" value="TraesCS1A03G0669000"/>
</dbReference>
<dbReference type="Gramene" id="TraesCS1A03G0693100.1">
    <property type="protein sequence ID" value="TraesCS1A03G0693100.1.CDS1"/>
    <property type="gene ID" value="TraesCS1A03G0693100"/>
</dbReference>
<dbReference type="Gramene" id="TraesCS1A03G0878800.1">
    <property type="protein sequence ID" value="TraesCS1A03G0878800.1.CDS1"/>
    <property type="gene ID" value="TraesCS1A03G0878800"/>
</dbReference>
<dbReference type="Gramene" id="TraesCS1A03G0879600.1">
    <property type="protein sequence ID" value="TraesCS1A03G0879600.1.CDS1"/>
    <property type="gene ID" value="TraesCS1A03G0879600"/>
</dbReference>
<dbReference type="Gramene" id="TraesCS1A03G0882500.1">
    <property type="protein sequence ID" value="TraesCS1A03G0882500.1.CDS1"/>
    <property type="gene ID" value="TraesCS1A03G0882500"/>
</dbReference>
<dbReference type="Gramene" id="TraesCS1B02G245000.1">
    <property type="protein sequence ID" value="TraesCS1B02G245000.1.cds1"/>
    <property type="gene ID" value="TraesCS1B02G245000"/>
</dbReference>
<dbReference type="Gramene" id="TraesCS1B02G245200.1">
    <property type="protein sequence ID" value="TraesCS1B02G245200.1.cds1"/>
    <property type="gene ID" value="TraesCS1B02G245200"/>
</dbReference>
<dbReference type="Gramene" id="TraesCS1B02G375900.1">
    <property type="protein sequence ID" value="TraesCS1B02G375900.1.cds1"/>
    <property type="gene ID" value="TraesCS1B02G375900"/>
</dbReference>
<dbReference type="Gramene" id="TraesCS1B02G376700.1">
    <property type="protein sequence ID" value="TraesCS1B02G376700.1.cds1"/>
    <property type="gene ID" value="TraesCS1B02G376700"/>
</dbReference>
<dbReference type="Gramene" id="TraesCS1B02G378400.1">
    <property type="protein sequence ID" value="TraesCS1B02G378400.1.cds1"/>
    <property type="gene ID" value="TraesCS1B02G378400"/>
</dbReference>
<dbReference type="Gramene" id="TraesCS1B02G378600.1">
    <property type="protein sequence ID" value="TraesCS1B02G378600.1.cds1"/>
    <property type="gene ID" value="TraesCS1B02G378600"/>
</dbReference>
<dbReference type="Gramene" id="TraesCS1B02G378700.1">
    <property type="protein sequence ID" value="TraesCS1B02G378700.1.cds1"/>
    <property type="gene ID" value="TraesCS1B02G378700"/>
</dbReference>
<dbReference type="Gramene" id="TraesCS1B03G0694400.1">
    <property type="protein sequence ID" value="TraesCS1B03G0694400.1.CDS1"/>
    <property type="gene ID" value="TraesCS1B03G0694400"/>
</dbReference>
<dbReference type="Gramene" id="TraesCS1B03G0694700.1">
    <property type="protein sequence ID" value="TraesCS1B03G0694700.1.CDS1"/>
    <property type="gene ID" value="TraesCS1B03G0694700"/>
</dbReference>
<dbReference type="Gramene" id="TraesCS1B03G1024400.1">
    <property type="protein sequence ID" value="TraesCS1B03G1024400.1.CDS1"/>
    <property type="gene ID" value="TraesCS1B03G1024400"/>
</dbReference>
<dbReference type="Gramene" id="TraesCS1B03G1026700.1">
    <property type="protein sequence ID" value="TraesCS1B03G1026700.1.CDS1"/>
    <property type="gene ID" value="TraesCS1B03G1026700"/>
</dbReference>
<dbReference type="Gramene" id="TraesCS1B03G1030300.1">
    <property type="protein sequence ID" value="TraesCS1B03G1030300.1.CDS1"/>
    <property type="gene ID" value="TraesCS1B03G1030300"/>
</dbReference>
<dbReference type="Gramene" id="TraesCS1B03G1030800.1">
    <property type="protein sequence ID" value="TraesCS1B03G1030800.1.CDS1"/>
    <property type="gene ID" value="TraesCS1B03G1030800"/>
</dbReference>
<dbReference type="Gramene" id="TraesCS1B03G1031100.1">
    <property type="protein sequence ID" value="TraesCS1B03G1031100.1.CDS1"/>
    <property type="gene ID" value="TraesCS1B03G1031100"/>
</dbReference>
<dbReference type="Gramene" id="TraesCS1D02G233000.1">
    <property type="protein sequence ID" value="TraesCS1D02G233000.1.cds1"/>
    <property type="gene ID" value="TraesCS1D02G233000"/>
</dbReference>
<dbReference type="Gramene" id="TraesCS1D02G233200.1">
    <property type="protein sequence ID" value="TraesCS1D02G233200.1.cds1"/>
    <property type="gene ID" value="TraesCS1D02G233200"/>
</dbReference>
<dbReference type="Gramene" id="TraesCS1D02G261900.1">
    <property type="protein sequence ID" value="TraesCS1D02G261900.1.cds1"/>
    <property type="gene ID" value="TraesCS1D02G261900"/>
</dbReference>
<dbReference type="Gramene" id="TraesCS1D02G274300.1">
    <property type="protein sequence ID" value="TraesCS1D02G274300.1.cds1"/>
    <property type="gene ID" value="TraesCS1D02G274300"/>
</dbReference>
<dbReference type="Gramene" id="TraesCS1D02G364200.1">
    <property type="protein sequence ID" value="TraesCS1D02G364200.1.cds1"/>
    <property type="gene ID" value="TraesCS1D02G364200"/>
</dbReference>
<dbReference type="Gramene" id="TraesCS1D02G364600.1">
    <property type="protein sequence ID" value="TraesCS1D02G364600.1.cds1"/>
    <property type="gene ID" value="TraesCS1D02G364600"/>
</dbReference>
<dbReference type="Gramene" id="TraesCS1D02G366400.1">
    <property type="protein sequence ID" value="TraesCS1D02G366400.1.cds1"/>
    <property type="gene ID" value="TraesCS1D02G366400"/>
</dbReference>
<dbReference type="Gramene" id="TraesCS1D02G366600.1">
    <property type="protein sequence ID" value="TraesCS1D02G366600.1.cds1"/>
    <property type="gene ID" value="TraesCS1D02G366600"/>
</dbReference>
<dbReference type="Gramene" id="TraesCS1D03G0571100.1">
    <property type="protein sequence ID" value="TraesCS1D03G0571100.1.CDS1"/>
    <property type="gene ID" value="TraesCS1D03G0571100"/>
</dbReference>
<dbReference type="Gramene" id="TraesCS1D03G0571300.1">
    <property type="protein sequence ID" value="TraesCS1D03G0571300.1.CDS1"/>
    <property type="gene ID" value="TraesCS1D03G0571300"/>
</dbReference>
<dbReference type="Gramene" id="TraesCS1D03G0632100.1">
    <property type="protein sequence ID" value="TraesCS1D03G0632100.1.CDS1"/>
    <property type="gene ID" value="TraesCS1D03G0632100"/>
</dbReference>
<dbReference type="Gramene" id="TraesCS1D03G0659100.1">
    <property type="protein sequence ID" value="TraesCS1D03G0659100.1.CDS1"/>
    <property type="gene ID" value="TraesCS1D03G0659100"/>
</dbReference>
<dbReference type="Gramene" id="TraesCS1D03G0852600.1">
    <property type="protein sequence ID" value="TraesCS1D03G0852600.1.CDS1"/>
    <property type="gene ID" value="TraesCS1D03G0852600"/>
</dbReference>
<dbReference type="Gramene" id="TraesCS1D03G0853100.1">
    <property type="protein sequence ID" value="TraesCS1D03G0853100.1.CDS1"/>
    <property type="gene ID" value="TraesCS1D03G0853100"/>
</dbReference>
<dbReference type="Gramene" id="TraesCS1D03G0856000.1">
    <property type="protein sequence ID" value="TraesCS1D03G0856000.1.CDS1"/>
    <property type="gene ID" value="TraesCS1D03G0856000"/>
</dbReference>
<dbReference type="Gramene" id="TraesCS1D03G0856400.1">
    <property type="protein sequence ID" value="TraesCS1D03G0856400.1.CDS1"/>
    <property type="gene ID" value="TraesCS1D03G0856400"/>
</dbReference>
<dbReference type="Gramene" id="TraesCS2A02G377500.1">
    <property type="protein sequence ID" value="TraesCS2A02G377500.1.cds1"/>
    <property type="gene ID" value="TraesCS2A02G377500"/>
</dbReference>
<dbReference type="Gramene" id="TraesCS2A03G0915900.1">
    <property type="protein sequence ID" value="TraesCS2A03G0915900.1.CDS1"/>
    <property type="gene ID" value="TraesCS2A03G0915900"/>
</dbReference>
<dbReference type="Gramene" id="TraesCS2B02G315500.1">
    <property type="protein sequence ID" value="TraesCS2B02G315500.1.cds1"/>
    <property type="gene ID" value="TraesCS2B02G315500"/>
</dbReference>
<dbReference type="Gramene" id="TraesCS2B03G0821800.1">
    <property type="protein sequence ID" value="TraesCS2B03G0821800.1.CDS1"/>
    <property type="gene ID" value="TraesCS2B03G0821800"/>
</dbReference>
<dbReference type="Gramene" id="TraesCS2D02G297000.1">
    <property type="protein sequence ID" value="TraesCS2D02G297000.1.cds1"/>
    <property type="gene ID" value="TraesCS2D02G297000"/>
</dbReference>
<dbReference type="Gramene" id="TraesCS2D03G0687300.1">
    <property type="protein sequence ID" value="TraesCS2D03G0687300.1.CDS1"/>
    <property type="gene ID" value="TraesCS2D03G0687300"/>
</dbReference>
<dbReference type="Gramene" id="TraesCS3A02G134000.1">
    <property type="protein sequence ID" value="TraesCS3A02G134000.1.cds1"/>
    <property type="gene ID" value="TraesCS3A02G134000"/>
</dbReference>
<dbReference type="Gramene" id="TraesCS3A02G377400.1">
    <property type="protein sequence ID" value="TraesCS3A02G377400.1.cds1"/>
    <property type="gene ID" value="TraesCS3A02G377400"/>
</dbReference>
<dbReference type="Gramene" id="TraesCS3A03G0316900.1">
    <property type="protein sequence ID" value="TraesCS3A03G0316900.1.CDS1"/>
    <property type="gene ID" value="TraesCS3A03G0316900"/>
</dbReference>
<dbReference type="Gramene" id="TraesCS3A03G0891800.1">
    <property type="protein sequence ID" value="TraesCS3A03G0891800.1.CDS1"/>
    <property type="gene ID" value="TraesCS3A03G0891800"/>
</dbReference>
<dbReference type="Gramene" id="TraesCS3B02G299200.1">
    <property type="protein sequence ID" value="TraesCS3B02G299200.1.cds1"/>
    <property type="gene ID" value="TraesCS3B02G299200"/>
</dbReference>
<dbReference type="Gramene" id="TraesCS3B03G0770900.1">
    <property type="protein sequence ID" value="TraesCS3B03G0770900.1.CDS1"/>
    <property type="gene ID" value="TraesCS3B03G0770900"/>
</dbReference>
<dbReference type="Gramene" id="TraesCS3D02G150300.1">
    <property type="protein sequence ID" value="TraesCS3D02G150300.1.cds1"/>
    <property type="gene ID" value="TraesCS3D02G150300"/>
</dbReference>
<dbReference type="Gramene" id="TraesCS3D02G370500.1">
    <property type="protein sequence ID" value="TraesCS3D02G370500.1.cds1"/>
    <property type="gene ID" value="TraesCS3D02G370500"/>
</dbReference>
<dbReference type="Gramene" id="TraesCS3D03G0317700.1">
    <property type="protein sequence ID" value="TraesCS3D03G0317700.1.CDS1"/>
    <property type="gene ID" value="TraesCS3D03G0317700"/>
</dbReference>
<dbReference type="Gramene" id="TraesCS3D03G0819300.1">
    <property type="protein sequence ID" value="TraesCS3D03G0819300.1.CDS1"/>
    <property type="gene ID" value="TraesCS3D03G0819300"/>
</dbReference>
<dbReference type="Gramene" id="TraesCS4A02G030300.1">
    <property type="protein sequence ID" value="TraesCS4A02G030300.1.cds1"/>
    <property type="gene ID" value="TraesCS4A02G030300"/>
</dbReference>
<dbReference type="Gramene" id="TraesCS4A02G057500.1">
    <property type="protein sequence ID" value="TraesCS4A02G057500.1.cds1"/>
    <property type="gene ID" value="TraesCS4A02G057500"/>
</dbReference>
<dbReference type="Gramene" id="TraesCS4A02G402000.1">
    <property type="protein sequence ID" value="TraesCS4A02G402000.1.cds1"/>
    <property type="gene ID" value="TraesCS4A02G402000"/>
</dbReference>
<dbReference type="Gramene" id="TraesCS4A03G0057300.1">
    <property type="protein sequence ID" value="TraesCS4A03G0057300.1.CDS1"/>
    <property type="gene ID" value="TraesCS4A03G0057300"/>
</dbReference>
<dbReference type="Gramene" id="TraesCS4A03G0112400.1">
    <property type="protein sequence ID" value="TraesCS4A03G0112400.1.CDS1"/>
    <property type="gene ID" value="TraesCS4A03G0112400"/>
</dbReference>
<dbReference type="Gramene" id="TraesCS4A03G0999700.1">
    <property type="protein sequence ID" value="TraesCS4A03G0999700.1.CDS1"/>
    <property type="gene ID" value="TraesCS4A03G0999700"/>
</dbReference>
<dbReference type="Gramene" id="TraesCS4D02G246800.1">
    <property type="protein sequence ID" value="TraesCS4D02G246800.1.cds1"/>
    <property type="gene ID" value="TraesCS4D02G246800"/>
</dbReference>
<dbReference type="Gramene" id="TraesCS4D02G274000.1">
    <property type="protein sequence ID" value="TraesCS4D02G274000.1.cds1"/>
    <property type="gene ID" value="TraesCS4D02G274000"/>
</dbReference>
<dbReference type="Gramene" id="TraesCS4D03G0592800.1">
    <property type="protein sequence ID" value="TraesCS4D03G0592800.1.CDS1"/>
    <property type="gene ID" value="TraesCS4D03G0592800"/>
</dbReference>
<dbReference type="Gramene" id="TraesCS4D03G0649200.1">
    <property type="protein sequence ID" value="TraesCS4D03G0649200.1.CDS1"/>
    <property type="gene ID" value="TraesCS4D03G0649200"/>
</dbReference>
<dbReference type="Gramene" id="TraesCS5B02G186900.1">
    <property type="protein sequence ID" value="TraesCS5B02G186900.1.cds1"/>
    <property type="gene ID" value="TraesCS5B02G186900"/>
</dbReference>
<dbReference type="Gramene" id="TraesCS5B03G0497500.1">
    <property type="protein sequence ID" value="TraesCS5B03G0497500.1.CDS1"/>
    <property type="gene ID" value="TraesCS5B03G0497500"/>
</dbReference>
<dbReference type="Gramene" id="TraesCS5D02G194100.1">
    <property type="protein sequence ID" value="TraesCS5D02G194100.1.cds1"/>
    <property type="gene ID" value="TraesCS5D02G194100"/>
</dbReference>
<dbReference type="Gramene" id="TraesCS5D03G0460500.1">
    <property type="protein sequence ID" value="TraesCS5D03G0460500.1.CDS1"/>
    <property type="gene ID" value="TraesCS5D03G0460500"/>
</dbReference>
<dbReference type="Gramene" id="TraesCS6A02G061500.1">
    <property type="protein sequence ID" value="TraesCS6A02G061500.1.cds1"/>
    <property type="gene ID" value="TraesCS6A02G061500"/>
</dbReference>
<dbReference type="Gramene" id="TraesCS6A02G063400.1">
    <property type="protein sequence ID" value="TraesCS6A02G063400.1.cds1"/>
    <property type="gene ID" value="TraesCS6A02G063400"/>
</dbReference>
<dbReference type="Gramene" id="TraesCS6A02G155800.1">
    <property type="protein sequence ID" value="TraesCS6A02G155800.1.cds1"/>
    <property type="gene ID" value="TraesCS6A02G155800"/>
</dbReference>
<dbReference type="Gramene" id="TraesCS6A03G0138300.1">
    <property type="protein sequence ID" value="TraesCS6A03G0138300.1.CDS1"/>
    <property type="gene ID" value="TraesCS6A03G0138300"/>
</dbReference>
<dbReference type="Gramene" id="TraesCS6A03G0141500.1">
    <property type="protein sequence ID" value="TraesCS6A03G0141500.1.CDS1"/>
    <property type="gene ID" value="TraesCS6A03G0141500"/>
</dbReference>
<dbReference type="Gramene" id="TraesCS6A03G0377700.1">
    <property type="protein sequence ID" value="TraesCS6A03G0377700.1.CDS1"/>
    <property type="gene ID" value="TraesCS6A03G0377700"/>
</dbReference>
<dbReference type="Gramene" id="TraesCS6B02G081800.1">
    <property type="protein sequence ID" value="TraesCS6B02G081800.1.cds1"/>
    <property type="gene ID" value="TraesCS6B02G081800"/>
</dbReference>
<dbReference type="Gramene" id="TraesCS6B02G082200.1">
    <property type="protein sequence ID" value="TraesCS6B02G082200.1.cds1"/>
    <property type="gene ID" value="TraesCS6B02G082200"/>
</dbReference>
<dbReference type="Gramene" id="TraesCS6B02G084700.1">
    <property type="protein sequence ID" value="TraesCS6B02G084700.1.cds1"/>
    <property type="gene ID" value="TraesCS6B02G084700"/>
</dbReference>
<dbReference type="Gramene" id="TraesCS6B03G0194100.1">
    <property type="protein sequence ID" value="TraesCS6B03G0194100.1.CDS1"/>
    <property type="gene ID" value="TraesCS6B03G0194100"/>
</dbReference>
<dbReference type="Gramene" id="TraesCS6B03G0195100.1">
    <property type="protein sequence ID" value="TraesCS6B03G0195100.1.CDS1"/>
    <property type="gene ID" value="TraesCS6B03G0195100"/>
</dbReference>
<dbReference type="Gramene" id="TraesCS6B03G0200400.1">
    <property type="protein sequence ID" value="TraesCS6B03G0200400.1.CDS1"/>
    <property type="gene ID" value="TraesCS6B03G0200400"/>
</dbReference>
<dbReference type="Gramene" id="TraesCS6D02G061300.1">
    <property type="protein sequence ID" value="TraesCS6D02G061300.1.cds1"/>
    <property type="gene ID" value="TraesCS6D02G061300"/>
</dbReference>
<dbReference type="Gramene" id="TraesCS6D02G063000.1">
    <property type="protein sequence ID" value="TraesCS6D02G063000.1.cds1"/>
    <property type="gene ID" value="TraesCS6D02G063000"/>
</dbReference>
<dbReference type="Gramene" id="TraesCS6D02G082800.1">
    <property type="protein sequence ID" value="TraesCS6D02G082800.1.cds1"/>
    <property type="gene ID" value="TraesCS6D02G082800"/>
</dbReference>
<dbReference type="Gramene" id="TraesCS6D02G145800.1">
    <property type="protein sequence ID" value="TraesCS6D02G145800.1.cds1"/>
    <property type="gene ID" value="TraesCS6D02G145800"/>
</dbReference>
<dbReference type="Gramene" id="TraesCS6D03G0130900.1">
    <property type="protein sequence ID" value="TraesCS6D03G0130900.1.CDS1"/>
    <property type="gene ID" value="TraesCS6D03G0130900"/>
</dbReference>
<dbReference type="Gramene" id="TraesCS6D03G0134000.1">
    <property type="protein sequence ID" value="TraesCS6D03G0134000.1.CDS1"/>
    <property type="gene ID" value="TraesCS6D03G0134000"/>
</dbReference>
<dbReference type="Gramene" id="TraesCS6D03G0187000.1">
    <property type="protein sequence ID" value="TraesCS6D03G0187000.1.CDS1"/>
    <property type="gene ID" value="TraesCS6D03G0187000"/>
</dbReference>
<dbReference type="Gramene" id="TraesCS6D03G0324900.1">
    <property type="protein sequence ID" value="TraesCS6D03G0324900.1.CDS1"/>
    <property type="gene ID" value="TraesCS6D03G0324900"/>
</dbReference>
<dbReference type="Gramene" id="TraesCS7A02G102900.1">
    <property type="protein sequence ID" value="TraesCS7A02G102900.1.cds1"/>
    <property type="gene ID" value="TraesCS7A02G102900"/>
</dbReference>
<dbReference type="Gramene" id="TraesCS7A02G103900.1">
    <property type="protein sequence ID" value="TraesCS7A02G103900.1.cds1"/>
    <property type="gene ID" value="TraesCS7A02G103900"/>
</dbReference>
<dbReference type="Gramene" id="TraesCS7A02G119400.1">
    <property type="protein sequence ID" value="TraesCS7A02G119400.1.cds1"/>
    <property type="gene ID" value="TraesCS7A02G119400"/>
</dbReference>
<dbReference type="Gramene" id="TraesCS7A02G119700.1">
    <property type="protein sequence ID" value="TraesCS7A02G119700.1.cds1"/>
    <property type="gene ID" value="TraesCS7A02G119700"/>
</dbReference>
<dbReference type="Gramene" id="TraesCS7A03G0244100.1">
    <property type="protein sequence ID" value="TraesCS7A03G0244100.1.CDS1"/>
    <property type="gene ID" value="TraesCS7A03G0244100"/>
</dbReference>
<dbReference type="Gramene" id="TraesCS7A03G0246100.1">
    <property type="protein sequence ID" value="TraesCS7A03G0246100.1.CDS1"/>
    <property type="gene ID" value="TraesCS7A03G0246100"/>
</dbReference>
<dbReference type="Gramene" id="TraesCS7A03G0283000.1">
    <property type="protein sequence ID" value="TraesCS7A03G0283000.1.CDS1"/>
    <property type="gene ID" value="TraesCS7A03G0283000"/>
</dbReference>
<dbReference type="Gramene" id="TraesCS7A03G0284300.1">
    <property type="protein sequence ID" value="TraesCS7A03G0284300.1.CDS1"/>
    <property type="gene ID" value="TraesCS7A03G0284300"/>
</dbReference>
<dbReference type="Gramene" id="TraesCS7B02G016000.1">
    <property type="protein sequence ID" value="TraesCS7B02G016000.1.cds1"/>
    <property type="gene ID" value="TraesCS7B02G016000"/>
</dbReference>
<dbReference type="Gramene" id="TraesCS7B02G016700.1">
    <property type="protein sequence ID" value="TraesCS7B02G016700.1.cds1"/>
    <property type="gene ID" value="TraesCS7B02G016700"/>
</dbReference>
<dbReference type="Gramene" id="TraesCS7B02G016900.1">
    <property type="protein sequence ID" value="TraesCS7B02G016900.1.cds1"/>
    <property type="gene ID" value="TraesCS7B02G016900"/>
</dbReference>
<dbReference type="Gramene" id="TraesCS7B02G017000.1">
    <property type="protein sequence ID" value="TraesCS7B02G017000.1.cds1"/>
    <property type="gene ID" value="TraesCS7B02G017000"/>
</dbReference>
<dbReference type="Gramene" id="TraesCS7B02G017400.1">
    <property type="protein sequence ID" value="TraesCS7B02G017400.1.cds1"/>
    <property type="gene ID" value="TraesCS7B02G017400"/>
</dbReference>
<dbReference type="Gramene" id="TraesCS7B02G019000.1">
    <property type="protein sequence ID" value="TraesCS7B02G019000.1.cds1"/>
    <property type="gene ID" value="TraesCS7B02G019000"/>
</dbReference>
<dbReference type="Gramene" id="TraesCS7B03G0040100.1">
    <property type="protein sequence ID" value="TraesCS7B03G0040100.1.CDS1"/>
    <property type="gene ID" value="TraesCS7B03G0040100"/>
</dbReference>
<dbReference type="Gramene" id="TraesCS7B03G0043600.1">
    <property type="protein sequence ID" value="TraesCS7B03G0043600.1.CDS1"/>
    <property type="gene ID" value="TraesCS7B03G0043600"/>
</dbReference>
<dbReference type="Gramene" id="TraesCS7B03G0044300.1">
    <property type="protein sequence ID" value="TraesCS7B03G0044300.1.CDS1"/>
    <property type="gene ID" value="TraesCS7B03G0044300"/>
</dbReference>
<dbReference type="Gramene" id="TraesCS7B03G0044400.1">
    <property type="protein sequence ID" value="TraesCS7B03G0044400.1.CDS1"/>
    <property type="gene ID" value="TraesCS7B03G0044400"/>
</dbReference>
<dbReference type="Gramene" id="TraesCS7B03G0044800.1">
    <property type="protein sequence ID" value="TraesCS7B03G0044800.1.CDS1"/>
    <property type="gene ID" value="TraesCS7B03G0044800"/>
</dbReference>
<dbReference type="Gramene" id="TraesCS7B03G0049800.1">
    <property type="protein sequence ID" value="TraesCS7B03G0049800.1.CDS1"/>
    <property type="gene ID" value="TraesCS7B03G0049800"/>
</dbReference>
<dbReference type="Gramene" id="TraesCS7D02G096900.1">
    <property type="protein sequence ID" value="TraesCS7D02G096900.1.cds1"/>
    <property type="gene ID" value="TraesCS7D02G096900"/>
</dbReference>
<dbReference type="Gramene" id="TraesCS7D02G097600.1">
    <property type="protein sequence ID" value="TraesCS7D02G097600.1.cds1"/>
    <property type="gene ID" value="TraesCS7D02G097600"/>
</dbReference>
<dbReference type="Gramene" id="TraesCS7D02G115400.1">
    <property type="protein sequence ID" value="TraesCS7D02G115400.1.cds1"/>
    <property type="gene ID" value="TraesCS7D02G115400"/>
</dbReference>
<dbReference type="Gramene" id="TraesCS7D02G116600.1">
    <property type="protein sequence ID" value="TraesCS7D02G116600.1.cds1"/>
    <property type="gene ID" value="TraesCS7D02G116600"/>
</dbReference>
<dbReference type="Gramene" id="TraesCS7D02G116800.1">
    <property type="protein sequence ID" value="TraesCS7D02G116800.1.cds1"/>
    <property type="gene ID" value="TraesCS7D02G116800"/>
</dbReference>
<dbReference type="Gramene" id="TraesCS7D02G116900.1">
    <property type="protein sequence ID" value="TraesCS7D02G116900.1.cds1"/>
    <property type="gene ID" value="TraesCS7D02G116900"/>
</dbReference>
<dbReference type="Gramene" id="TraesCS7D02G117100.1">
    <property type="protein sequence ID" value="TraesCS7D02G117100.1.cds1"/>
    <property type="gene ID" value="TraesCS7D02G117100"/>
</dbReference>
<dbReference type="Gramene" id="TraesCS7D02G143500.1">
    <property type="protein sequence ID" value="TraesCS7D02G143500.1.cds1"/>
    <property type="gene ID" value="TraesCS7D02G143500"/>
</dbReference>
<dbReference type="Gramene" id="TraesCS7D03G0220100.1">
    <property type="protein sequence ID" value="TraesCS7D03G0220100.1.CDS1"/>
    <property type="gene ID" value="TraesCS7D03G0220100"/>
</dbReference>
<dbReference type="Gramene" id="TraesCS7D03G0221800.1">
    <property type="protein sequence ID" value="TraesCS7D03G0221800.1.CDS1"/>
    <property type="gene ID" value="TraesCS7D03G0221800"/>
</dbReference>
<dbReference type="Gramene" id="TraesCS7D03G0259100.1">
    <property type="protein sequence ID" value="TraesCS7D03G0259100.1.CDS1"/>
    <property type="gene ID" value="TraesCS7D03G0259100"/>
</dbReference>
<dbReference type="Gramene" id="TraesCS7D03G0261200.1">
    <property type="protein sequence ID" value="TraesCS7D03G0261200.1.CDS1"/>
    <property type="gene ID" value="TraesCS7D03G0261200"/>
</dbReference>
<dbReference type="Gramene" id="TraesCS7D03G0261500.1">
    <property type="protein sequence ID" value="TraesCS7D03G0261500.1.CDS1"/>
    <property type="gene ID" value="TraesCS7D03G0261500"/>
</dbReference>
<dbReference type="Gramene" id="TraesCS7D03G0261900.1">
    <property type="protein sequence ID" value="TraesCS7D03G0261900.1.CDS1"/>
    <property type="gene ID" value="TraesCS7D03G0261900"/>
</dbReference>
<dbReference type="Gramene" id="TraesCS7D03G0262700.1">
    <property type="protein sequence ID" value="TraesCS7D03G0262700.1.CDS1"/>
    <property type="gene ID" value="TraesCS7D03G0262700"/>
</dbReference>
<dbReference type="Gramene" id="TraesCS7D03G0322700.1">
    <property type="protein sequence ID" value="TraesCS7D03G0322700.1.CDS1"/>
    <property type="gene ID" value="TraesCS7D03G0322700"/>
</dbReference>
<dbReference type="Gramene" id="TraesCSU02G093200.1">
    <property type="protein sequence ID" value="TraesCSU02G093200.1.cds1"/>
    <property type="gene ID" value="TraesCSU02G093200"/>
</dbReference>
<dbReference type="Gramene" id="TraesCSU02G093400.1">
    <property type="protein sequence ID" value="TraesCSU02G093400.1.cds1"/>
    <property type="gene ID" value="TraesCSU02G093400"/>
</dbReference>
<dbReference type="Gramene" id="TraesCSU02G095700.1">
    <property type="protein sequence ID" value="TraesCSU02G095700.1.cds1"/>
    <property type="gene ID" value="TraesCSU02G095700"/>
</dbReference>
<dbReference type="Gramene" id="TraesCSU02G095800.1">
    <property type="protein sequence ID" value="TraesCSU02G095800.1.cds1"/>
    <property type="gene ID" value="TraesCSU02G095800"/>
</dbReference>
<dbReference type="Gramene" id="TraesCSU02G182300.1">
    <property type="protein sequence ID" value="TraesCSU02G182300.1.cds1"/>
    <property type="gene ID" value="TraesCSU02G182300"/>
</dbReference>
<dbReference type="Gramene" id="TraesCSU03G0093200.1">
    <property type="protein sequence ID" value="TraesCSU03G0093200.1.CDS1"/>
    <property type="gene ID" value="TraesCSU03G0093200"/>
</dbReference>
<dbReference type="Gramene" id="TraesCSU03G0093300.1">
    <property type="protein sequence ID" value="TraesCSU03G0093300.1.CDS1"/>
    <property type="gene ID" value="TraesCSU03G0093300"/>
</dbReference>
<dbReference type="Gramene" id="TraesCSU03G0256200.1">
    <property type="protein sequence ID" value="TraesCSU03G0256200.1.CDS1"/>
    <property type="gene ID" value="TraesCSU03G0256200"/>
</dbReference>
<dbReference type="Gramene" id="TraesJAG1A03G00107150.1">
    <property type="protein sequence ID" value="TraesJAG1A03G00107150.1.CDS1"/>
    <property type="gene ID" value="TraesJAG1A03G00107150"/>
</dbReference>
<dbReference type="Gramene" id="TraesJAG1A03G00119720.1">
    <property type="protein sequence ID" value="TraesJAG1A03G00119720.1.CDS1"/>
    <property type="gene ID" value="TraesJAG1A03G00119720"/>
</dbReference>
<dbReference type="Gramene" id="TraesJAG1A03G00123580.1">
    <property type="protein sequence ID" value="TraesJAG1A03G00123580.1.CDS1"/>
    <property type="gene ID" value="TraesJAG1A03G00123580"/>
</dbReference>
<dbReference type="Gramene" id="TraesJAG1A03G00152740.1">
    <property type="protein sequence ID" value="TraesJAG1A03G00152740.1.CDS1"/>
    <property type="gene ID" value="TraesJAG1A03G00152740"/>
</dbReference>
<dbReference type="Gramene" id="TraesJAG1A03G00152820.1">
    <property type="protein sequence ID" value="TraesJAG1A03G00152820.1.CDS1"/>
    <property type="gene ID" value="TraesJAG1A03G00152820"/>
</dbReference>
<dbReference type="Gramene" id="TraesJAG1A03G00153260.1">
    <property type="protein sequence ID" value="TraesJAG1A03G00153260.1.CDS1"/>
    <property type="gene ID" value="TraesJAG1A03G00153260"/>
</dbReference>
<dbReference type="Gramene" id="TraesJAG1B03G00308100.1">
    <property type="protein sequence ID" value="TraesJAG1B03G00308100.1.CDS1"/>
    <property type="gene ID" value="TraesJAG1B03G00308100"/>
</dbReference>
<dbReference type="Gramene" id="TraesJAG1B03G00308130.1">
    <property type="protein sequence ID" value="TraesJAG1B03G00308130.1.CDS1"/>
    <property type="gene ID" value="TraesJAG1B03G00308130"/>
</dbReference>
<dbReference type="Gramene" id="TraesJAG1B03G00324530.1">
    <property type="protein sequence ID" value="TraesJAG1B03G00324530.1.CDS1"/>
    <property type="gene ID" value="TraesJAG1B03G00324530"/>
</dbReference>
<dbReference type="Gramene" id="TraesJAG1B03G00363560.1">
    <property type="protein sequence ID" value="TraesJAG1B03G00363560.1.CDS1"/>
    <property type="gene ID" value="TraesJAG1B03G00363560"/>
</dbReference>
<dbReference type="Gramene" id="TraesJAG1B03G00363620.1">
    <property type="protein sequence ID" value="TraesJAG1B03G00363620.1.CDS1"/>
    <property type="gene ID" value="TraesJAG1B03G00363620"/>
</dbReference>
<dbReference type="Gramene" id="TraesJAG1B03G00363730.1">
    <property type="protein sequence ID" value="TraesJAG1B03G00363730.1.CDS1"/>
    <property type="gene ID" value="TraesJAG1B03G00363730"/>
</dbReference>
<dbReference type="Gramene" id="TraesJAG1B03G00364400.1">
    <property type="protein sequence ID" value="TraesJAG1B03G00364400.1.CDS1"/>
    <property type="gene ID" value="TraesJAG1B03G00364400"/>
</dbReference>
<dbReference type="Gramene" id="TraesJAG1B03G00364900.1">
    <property type="protein sequence ID" value="TraesJAG1B03G00364900.1.CDS1"/>
    <property type="gene ID" value="TraesJAG1B03G00364900"/>
</dbReference>
<dbReference type="Gramene" id="TraesJAG1D03G00502230.1">
    <property type="protein sequence ID" value="TraesJAG1D03G00502230.1.CDS1"/>
    <property type="gene ID" value="TraesJAG1D03G00502230"/>
</dbReference>
<dbReference type="Gramene" id="TraesJAG1D03G00502280.1">
    <property type="protein sequence ID" value="TraesJAG1D03G00502280.1.CDS1"/>
    <property type="gene ID" value="TraesJAG1D03G00502280"/>
</dbReference>
<dbReference type="Gramene" id="TraesJAG1D03G00512470.1">
    <property type="protein sequence ID" value="TraesJAG1D03G00512470.1.CDS1"/>
    <property type="gene ID" value="TraesJAG1D03G00512470"/>
</dbReference>
<dbReference type="Gramene" id="TraesJAG1D03G00517200.1">
    <property type="protein sequence ID" value="TraesJAG1D03G00517200.1.CDS1"/>
    <property type="gene ID" value="TraesJAG1D03G00517200"/>
</dbReference>
<dbReference type="Gramene" id="TraesJAG1D03G00547990.1">
    <property type="protein sequence ID" value="TraesJAG1D03G00547990.1.CDS1"/>
    <property type="gene ID" value="TraesJAG1D03G00547990"/>
</dbReference>
<dbReference type="Gramene" id="TraesJAG1D03G00548080.1">
    <property type="protein sequence ID" value="TraesJAG1D03G00548080.1.CDS1"/>
    <property type="gene ID" value="TraesJAG1D03G00548080"/>
</dbReference>
<dbReference type="Gramene" id="TraesJAG1D03G00548580.1">
    <property type="protein sequence ID" value="TraesJAG1D03G00548580.1.CDS1"/>
    <property type="gene ID" value="TraesJAG1D03G00548580"/>
</dbReference>
<dbReference type="Gramene" id="TraesJAG1D03G00548670.1">
    <property type="protein sequence ID" value="TraesJAG1D03G00548670.1.CDS1"/>
    <property type="gene ID" value="TraesJAG1D03G00548670"/>
</dbReference>
<dbReference type="Gramene" id="TraesJAG2A03G00746920.1">
    <property type="protein sequence ID" value="TraesJAG2A03G00746920.1.CDS1"/>
    <property type="gene ID" value="TraesJAG2A03G00746920"/>
</dbReference>
<dbReference type="Gramene" id="TraesJAG2B03G00959840.1">
    <property type="protein sequence ID" value="TraesJAG2B03G00959840.1.CDS1"/>
    <property type="gene ID" value="TraesJAG2B03G00959840"/>
</dbReference>
<dbReference type="Gramene" id="TraesJAG2D03G01208510.1">
    <property type="protein sequence ID" value="TraesJAG2D03G01208510.1.CDS1"/>
    <property type="gene ID" value="TraesJAG2D03G01208510"/>
</dbReference>
<dbReference type="Gramene" id="TraesJAG3A03G01365560.1">
    <property type="protein sequence ID" value="TraesJAG3A03G01365560.1.CDS1"/>
    <property type="gene ID" value="TraesJAG3A03G01365560"/>
</dbReference>
<dbReference type="Gramene" id="TraesJAG3A03G01477340.1">
    <property type="protein sequence ID" value="TraesJAG3A03G01477340.1.CDS1"/>
    <property type="gene ID" value="TraesJAG3A03G01477340"/>
</dbReference>
<dbReference type="Gramene" id="TraesJAG3B03G01608180.1">
    <property type="protein sequence ID" value="TraesJAG3B03G01608180.1.CDS1"/>
    <property type="gene ID" value="TraesJAG3B03G01608180"/>
</dbReference>
<dbReference type="Gramene" id="TraesJAG3B03G01680680.1">
    <property type="protein sequence ID" value="TraesJAG3B03G01680680.1.CDS1"/>
    <property type="gene ID" value="TraesJAG3B03G01680680"/>
</dbReference>
<dbReference type="Gramene" id="TraesJAG3D03G01854300.1">
    <property type="protein sequence ID" value="TraesJAG3D03G01854300.1.CDS1"/>
    <property type="gene ID" value="TraesJAG3D03G01854300"/>
</dbReference>
<dbReference type="Gramene" id="TraesJAG3D03G01951210.1">
    <property type="protein sequence ID" value="TraesJAG3D03G01951210.1.CDS1"/>
    <property type="gene ID" value="TraesJAG3D03G01951210"/>
</dbReference>
<dbReference type="Gramene" id="TraesJAG4A03G02020740.1">
    <property type="protein sequence ID" value="TraesJAG4A03G02020740.1.CDS1"/>
    <property type="gene ID" value="TraesJAG4A03G02020740"/>
</dbReference>
<dbReference type="Gramene" id="TraesJAG4A03G02030130.1">
    <property type="protein sequence ID" value="TraesJAG4A03G02030130.1.CDS1"/>
    <property type="gene ID" value="TraesJAG4A03G02030130"/>
</dbReference>
<dbReference type="Gramene" id="TraesJAG4A03G02178200.1">
    <property type="protein sequence ID" value="TraesJAG4A03G02178200.1.CDS1"/>
    <property type="gene ID" value="TraesJAG4A03G02178200"/>
</dbReference>
<dbReference type="Gramene" id="TraesJAG4A03G02178260.1">
    <property type="protein sequence ID" value="TraesJAG4A03G02178260.1.CDS1"/>
    <property type="gene ID" value="TraesJAG4A03G02178260"/>
</dbReference>
<dbReference type="Gramene" id="TraesJAG4B03G02364370.1">
    <property type="protein sequence ID" value="TraesJAG4B03G02364370.1.CDS1"/>
    <property type="gene ID" value="TraesJAG4B03G02364370"/>
</dbReference>
<dbReference type="Gramene" id="TraesJAG4D03G02522600.1">
    <property type="protein sequence ID" value="TraesJAG4D03G02522600.1.CDS1"/>
    <property type="gene ID" value="TraesJAG4D03G02522600"/>
</dbReference>
<dbReference type="Gramene" id="TraesJAG4D03G02532300.1">
    <property type="protein sequence ID" value="TraesJAG4D03G02532300.1.CDS1"/>
    <property type="gene ID" value="TraesJAG4D03G02532300"/>
</dbReference>
<dbReference type="Gramene" id="TraesJAG5B03G02881780.1">
    <property type="protein sequence ID" value="TraesJAG5B03G02881780.1.CDS1"/>
    <property type="gene ID" value="TraesJAG5B03G02881780"/>
</dbReference>
<dbReference type="Gramene" id="TraesJAG5D03G03113660.1">
    <property type="protein sequence ID" value="TraesJAG5D03G03113660.1.CDS1"/>
    <property type="gene ID" value="TraesJAG5D03G03113660"/>
</dbReference>
<dbReference type="Gramene" id="TraesJAG6A03G03250210.1">
    <property type="protein sequence ID" value="TraesJAG6A03G03250210.1.CDS1"/>
    <property type="gene ID" value="TraesJAG6A03G03250210"/>
</dbReference>
<dbReference type="Gramene" id="TraesJAG6A03G03262670.1">
    <property type="protein sequence ID" value="TraesJAG6A03G03262670.1.CDS1"/>
    <property type="gene ID" value="TraesJAG6A03G03262670"/>
</dbReference>
<dbReference type="Gramene" id="TraesJAG6A03G03287230.1">
    <property type="protein sequence ID" value="TraesJAG6A03G03287230.1.CDS1"/>
    <property type="gene ID" value="TraesJAG6A03G03287230"/>
</dbReference>
<dbReference type="Gramene" id="TraesJAG6B03G03437870.1">
    <property type="protein sequence ID" value="TraesJAG6B03G03437870.1.CDS1"/>
    <property type="gene ID" value="TraesJAG6B03G03437870"/>
</dbReference>
<dbReference type="Gramene" id="TraesJAG6B03G03438950.1">
    <property type="protein sequence ID" value="TraesJAG6B03G03438950.1.CDS1"/>
    <property type="gene ID" value="TraesJAG6B03G03438950"/>
</dbReference>
<dbReference type="Gramene" id="TraesJAG6D03G03653710.1">
    <property type="protein sequence ID" value="TraesJAG6D03G03653710.1.CDS1"/>
    <property type="gene ID" value="TraesJAG6D03G03653710"/>
</dbReference>
<dbReference type="Gramene" id="TraesJAG6D03G03676330.1">
    <property type="protein sequence ID" value="TraesJAG6D03G03676330.1.CDS1"/>
    <property type="gene ID" value="TraesJAG6D03G03676330"/>
</dbReference>
<dbReference type="Gramene" id="TraesJAG7A03G03817840.1">
    <property type="protein sequence ID" value="TraesJAG7A03G03817840.1.CDS1"/>
    <property type="gene ID" value="TraesJAG7A03G03817840"/>
</dbReference>
<dbReference type="Gramene" id="TraesJAG7A03G03818130.1">
    <property type="protein sequence ID" value="TraesJAG7A03G03818130.1.CDS1"/>
    <property type="gene ID" value="TraesJAG7A03G03818130"/>
</dbReference>
<dbReference type="Gramene" id="TraesJAG7A03G03823080.1">
    <property type="protein sequence ID" value="TraesJAG7A03G03823080.1.CDS1"/>
    <property type="gene ID" value="TraesJAG7A03G03823080"/>
</dbReference>
<dbReference type="Gramene" id="TraesJAG7A03G03823330.1">
    <property type="protein sequence ID" value="TraesJAG7A03G03823330.1.CDS1"/>
    <property type="gene ID" value="TraesJAG7A03G03823330"/>
</dbReference>
<dbReference type="Gramene" id="TraesJAG7A03G03823360.1">
    <property type="protein sequence ID" value="TraesJAG7A03G03823360.1.CDS1"/>
    <property type="gene ID" value="TraesJAG7A03G03823360"/>
</dbReference>
<dbReference type="Gramene" id="TraesJAG7A03G03823410.1">
    <property type="protein sequence ID" value="TraesJAG7A03G03823410.1.CDS1"/>
    <property type="gene ID" value="TraesJAG7A03G03823410"/>
</dbReference>
<dbReference type="Gramene" id="TraesJAG7B03G04028980.1">
    <property type="protein sequence ID" value="TraesJAG7B03G04028980.1.CDS1"/>
    <property type="gene ID" value="TraesJAG7B03G04028980"/>
</dbReference>
<dbReference type="Gramene" id="TraesJAG7B03G04029440.1">
    <property type="protein sequence ID" value="TraesJAG7B03G04029440.1.CDS1"/>
    <property type="gene ID" value="TraesJAG7B03G04029440"/>
</dbReference>
<dbReference type="Gramene" id="TraesJAG7B03G04029510.1">
    <property type="protein sequence ID" value="TraesJAG7B03G04029510.1.CDS1"/>
    <property type="gene ID" value="TraesJAG7B03G04029510"/>
</dbReference>
<dbReference type="Gramene" id="TraesJAG7B03G04029830.1">
    <property type="protein sequence ID" value="TraesJAG7B03G04029830.1.CDS1"/>
    <property type="gene ID" value="TraesJAG7B03G04029830"/>
</dbReference>
<dbReference type="Gramene" id="TraesJAG7B03G04029930.1">
    <property type="protein sequence ID" value="TraesJAG7B03G04029930.1.CDS1"/>
    <property type="gene ID" value="TraesJAG7B03G04029930"/>
</dbReference>
<dbReference type="Gramene" id="TraesJAG7B03G04029970.1">
    <property type="protein sequence ID" value="TraesJAG7B03G04029970.1.CDS1"/>
    <property type="gene ID" value="TraesJAG7B03G04029970"/>
</dbReference>
<dbReference type="Gramene" id="TraesJAG7B03G04030060.1">
    <property type="protein sequence ID" value="TraesJAG7B03G04030060.1.CDS1"/>
    <property type="gene ID" value="TraesJAG7B03G04030060"/>
</dbReference>
<dbReference type="Gramene" id="TraesJAG7B03G04030560.1">
    <property type="protein sequence ID" value="TraesJAG7B03G04030560.1.CDS1"/>
    <property type="gene ID" value="TraesJAG7B03G04030560"/>
</dbReference>
<dbReference type="Gramene" id="TraesJAG7B03G04041340.1">
    <property type="protein sequence ID" value="TraesJAG7B03G04041340.1.CDS1"/>
    <property type="gene ID" value="TraesJAG7B03G04041340"/>
</dbReference>
<dbReference type="Gramene" id="TraesJAG7D03G04286840.1">
    <property type="protein sequence ID" value="TraesJAG7D03G04286840.1.CDS1"/>
    <property type="gene ID" value="TraesJAG7D03G04286840"/>
</dbReference>
<dbReference type="Gramene" id="TraesJAG7D03G04286880.1">
    <property type="protein sequence ID" value="TraesJAG7D03G04286880.1.CDS1"/>
    <property type="gene ID" value="TraesJAG7D03G04286880"/>
</dbReference>
<dbReference type="Gramene" id="TraesJAG7D03G04286990.1">
    <property type="protein sequence ID" value="TraesJAG7D03G04286990.1.CDS1"/>
    <property type="gene ID" value="TraesJAG7D03G04286990"/>
</dbReference>
<dbReference type="Gramene" id="TraesJAG7D03G04292720.1">
    <property type="protein sequence ID" value="TraesJAG7D03G04292720.1.CDS1"/>
    <property type="gene ID" value="TraesJAG7D03G04292720"/>
</dbReference>
<dbReference type="Gramene" id="TraesJAG7D03G04293020.1">
    <property type="protein sequence ID" value="TraesJAG7D03G04293020.1.CDS1"/>
    <property type="gene ID" value="TraesJAG7D03G04293020"/>
</dbReference>
<dbReference type="Gramene" id="TraesJAG7D03G04293050.1">
    <property type="protein sequence ID" value="TraesJAG7D03G04293050.1.CDS1"/>
    <property type="gene ID" value="TraesJAG7D03G04293050"/>
</dbReference>
<dbReference type="Gramene" id="TraesJAG7D03G04301940.1">
    <property type="protein sequence ID" value="TraesJAG7D03G04301940.1.CDS1"/>
    <property type="gene ID" value="TraesJAG7D03G04301940"/>
</dbReference>
<dbReference type="Gramene" id="TraesJAGUn03G04490190.1">
    <property type="protein sequence ID" value="TraesJAGUn03G04490190.1.CDS1"/>
    <property type="gene ID" value="TraesJAGUn03G04490190"/>
</dbReference>
<dbReference type="Gramene" id="TraesJAGUn03G04490620.1">
    <property type="protein sequence ID" value="TraesJAGUn03G04490620.1.CDS1"/>
    <property type="gene ID" value="TraesJAGUn03G04490620"/>
</dbReference>
<dbReference type="Gramene" id="TraesJAGUn03G04573170.1">
    <property type="protein sequence ID" value="TraesJAGUn03G04573170.1.CDS1"/>
    <property type="gene ID" value="TraesJAGUn03G04573170"/>
</dbReference>
<dbReference type="Gramene" id="TraesJUL1A03G00106550.1">
    <property type="protein sequence ID" value="TraesJUL1A03G00106550.1.CDS1"/>
    <property type="gene ID" value="TraesJUL1A03G00106550"/>
</dbReference>
<dbReference type="Gramene" id="TraesJUL1A03G00119480.1">
    <property type="protein sequence ID" value="TraesJUL1A03G00119480.1.CDS1"/>
    <property type="gene ID" value="TraesJUL1A03G00119480"/>
</dbReference>
<dbReference type="Gramene" id="TraesJUL1A03G00123470.1">
    <property type="protein sequence ID" value="TraesJUL1A03G00123470.1.CDS1"/>
    <property type="gene ID" value="TraesJUL1A03G00123470"/>
</dbReference>
<dbReference type="Gramene" id="TraesJUL1A03G00153020.1">
    <property type="protein sequence ID" value="TraesJUL1A03G00153020.1.CDS1"/>
    <property type="gene ID" value="TraesJUL1A03G00153020"/>
</dbReference>
<dbReference type="Gramene" id="TraesJUL1A03G00153130.1">
    <property type="protein sequence ID" value="TraesJUL1A03G00153130.1.CDS1"/>
    <property type="gene ID" value="TraesJUL1A03G00153130"/>
</dbReference>
<dbReference type="Gramene" id="TraesJUL1A03G00153550.1">
    <property type="protein sequence ID" value="TraesJUL1A03G00153550.1.CDS1"/>
    <property type="gene ID" value="TraesJUL1A03G00153550"/>
</dbReference>
<dbReference type="Gramene" id="TraesJUL1B03G00308300.1">
    <property type="protein sequence ID" value="TraesJUL1B03G00308300.1.CDS1"/>
    <property type="gene ID" value="TraesJUL1B03G00308300"/>
</dbReference>
<dbReference type="Gramene" id="TraesJUL1B03G00308330.1">
    <property type="protein sequence ID" value="TraesJUL1B03G00308330.1.CDS1"/>
    <property type="gene ID" value="TraesJUL1B03G00308330"/>
</dbReference>
<dbReference type="Gramene" id="TraesJUL1B03G00324880.1">
    <property type="protein sequence ID" value="TraesJUL1B03G00324880.1.CDS1"/>
    <property type="gene ID" value="TraesJUL1B03G00324880"/>
</dbReference>
<dbReference type="Gramene" id="TraesJUL1B03G00366300.1">
    <property type="protein sequence ID" value="TraesJUL1B03G00366300.1.CDS1"/>
    <property type="gene ID" value="TraesJUL1B03G00366300"/>
</dbReference>
<dbReference type="Gramene" id="TraesJUL1B03G00366950.1">
    <property type="protein sequence ID" value="TraesJUL1B03G00366950.1.CDS1"/>
    <property type="gene ID" value="TraesJUL1B03G00366950"/>
</dbReference>
<dbReference type="Gramene" id="TraesJUL1B03G00367090.1">
    <property type="protein sequence ID" value="TraesJUL1B03G00367090.1.CDS1"/>
    <property type="gene ID" value="TraesJUL1B03G00367090"/>
</dbReference>
<dbReference type="Gramene" id="TraesJUL1B03G00367140.1">
    <property type="protein sequence ID" value="TraesJUL1B03G00367140.1.CDS1"/>
    <property type="gene ID" value="TraesJUL1B03G00367140"/>
</dbReference>
<dbReference type="Gramene" id="TraesJUL1D03G00505660.1">
    <property type="protein sequence ID" value="TraesJUL1D03G00505660.1.CDS1"/>
    <property type="gene ID" value="TraesJUL1D03G00505660"/>
</dbReference>
<dbReference type="Gramene" id="TraesJUL1D03G00505700.1">
    <property type="protein sequence ID" value="TraesJUL1D03G00505700.1.CDS1"/>
    <property type="gene ID" value="TraesJUL1D03G00505700"/>
</dbReference>
<dbReference type="Gramene" id="TraesJUL1D03G00515720.1">
    <property type="protein sequence ID" value="TraesJUL1D03G00515720.1.CDS1"/>
    <property type="gene ID" value="TraesJUL1D03G00515720"/>
</dbReference>
<dbReference type="Gramene" id="TraesJUL1D03G00520520.1">
    <property type="protein sequence ID" value="TraesJUL1D03G00520520.1.CDS1"/>
    <property type="gene ID" value="TraesJUL1D03G00520520"/>
</dbReference>
<dbReference type="Gramene" id="TraesJUL1D03G00551610.1">
    <property type="protein sequence ID" value="TraesJUL1D03G00551610.1.CDS1"/>
    <property type="gene ID" value="TraesJUL1D03G00551610"/>
</dbReference>
<dbReference type="Gramene" id="TraesJUL1D03G00551610.2">
    <property type="protein sequence ID" value="TraesJUL1D03G00551610.2.CDS1"/>
    <property type="gene ID" value="TraesJUL1D03G00551610"/>
</dbReference>
<dbReference type="Gramene" id="TraesJUL1D03G00551680.1">
    <property type="protein sequence ID" value="TraesJUL1D03G00551680.1.CDS1"/>
    <property type="gene ID" value="TraesJUL1D03G00551680"/>
</dbReference>
<dbReference type="Gramene" id="TraesJUL1D03G00552200.1">
    <property type="protein sequence ID" value="TraesJUL1D03G00552200.1.CDS1"/>
    <property type="gene ID" value="TraesJUL1D03G00552200"/>
</dbReference>
<dbReference type="Gramene" id="TraesJUL1D03G00552280.1">
    <property type="protein sequence ID" value="TraesJUL1D03G00552280.1.CDS1"/>
    <property type="gene ID" value="TraesJUL1D03G00552280"/>
</dbReference>
<dbReference type="Gramene" id="TraesJUL2A03G00722320.1">
    <property type="protein sequence ID" value="TraesJUL2A03G00722320.1.CDS1"/>
    <property type="gene ID" value="TraesJUL2A03G00722320"/>
</dbReference>
<dbReference type="Gramene" id="TraesJUL2A03G00751620.1">
    <property type="protein sequence ID" value="TraesJUL2A03G00751620.1.CDS1"/>
    <property type="gene ID" value="TraesJUL2A03G00751620"/>
</dbReference>
<dbReference type="Gramene" id="TraesJUL2B03G00894080.1">
    <property type="protein sequence ID" value="TraesJUL2B03G00894080.1.CDS1"/>
    <property type="gene ID" value="TraesJUL2B03G00894080"/>
</dbReference>
<dbReference type="Gramene" id="TraesJUL2D03G01208560.1">
    <property type="protein sequence ID" value="TraesJUL2D03G01208560.1.CDS1"/>
    <property type="gene ID" value="TraesJUL2D03G01208560"/>
</dbReference>
<dbReference type="Gramene" id="TraesJUL3A03G01368010.1">
    <property type="protein sequence ID" value="TraesJUL3A03G01368010.1.CDS1"/>
    <property type="gene ID" value="TraesJUL3A03G01368010"/>
</dbReference>
<dbReference type="Gramene" id="TraesJUL3A03G01481040.1">
    <property type="protein sequence ID" value="TraesJUL3A03G01481040.1.CDS1"/>
    <property type="gene ID" value="TraesJUL3A03G01481040"/>
</dbReference>
<dbReference type="Gramene" id="TraesJUL3B03G01612200.1">
    <property type="protein sequence ID" value="TraesJUL3B03G01612200.1.CDS1"/>
    <property type="gene ID" value="TraesJUL3B03G01612200"/>
</dbReference>
<dbReference type="Gramene" id="TraesJUL3B03G01684790.1">
    <property type="protein sequence ID" value="TraesJUL3B03G01684790.1.CDS1"/>
    <property type="gene ID" value="TraesJUL3B03G01684790"/>
</dbReference>
<dbReference type="Gramene" id="TraesJUL3D03G01863440.1">
    <property type="protein sequence ID" value="TraesJUL3D03G01863440.1.CDS1"/>
    <property type="gene ID" value="TraesJUL3D03G01863440"/>
</dbReference>
<dbReference type="Gramene" id="TraesJUL3D03G01961070.1">
    <property type="protein sequence ID" value="TraesJUL3D03G01961070.1.CDS1"/>
    <property type="gene ID" value="TraesJUL3D03G01961070"/>
</dbReference>
<dbReference type="Gramene" id="TraesJUL4A03G02032470.1">
    <property type="protein sequence ID" value="TraesJUL4A03G02032470.1.CDS1"/>
    <property type="gene ID" value="TraesJUL4A03G02032470"/>
</dbReference>
<dbReference type="Gramene" id="TraesJUL4A03G02041810.1">
    <property type="protein sequence ID" value="TraesJUL4A03G02041810.1.CDS1"/>
    <property type="gene ID" value="TraesJUL4A03G02041810"/>
</dbReference>
<dbReference type="Gramene" id="TraesJUL4A03G02196870.1">
    <property type="protein sequence ID" value="TraesJUL4A03G02196870.1.CDS1"/>
    <property type="gene ID" value="TraesJUL4A03G02196870"/>
</dbReference>
<dbReference type="Gramene" id="TraesJUL4A03G02196930.1">
    <property type="protein sequence ID" value="TraesJUL4A03G02196930.1.CDS1"/>
    <property type="gene ID" value="TraesJUL4A03G02196930"/>
</dbReference>
<dbReference type="Gramene" id="TraesJUL4D03G02544660.1">
    <property type="protein sequence ID" value="TraesJUL4D03G02544660.1.CDS1"/>
    <property type="gene ID" value="TraesJUL4D03G02544660"/>
</dbReference>
<dbReference type="Gramene" id="TraesJUL4D03G02554400.1">
    <property type="protein sequence ID" value="TraesJUL4D03G02554400.1.CDS1"/>
    <property type="gene ID" value="TraesJUL4D03G02554400"/>
</dbReference>
<dbReference type="Gramene" id="TraesJUL5B03G02904960.1">
    <property type="protein sequence ID" value="TraesJUL5B03G02904960.1.CDS1"/>
    <property type="gene ID" value="TraesJUL5B03G02904960"/>
</dbReference>
<dbReference type="Gramene" id="TraesJUL5B03G02904960.2">
    <property type="protein sequence ID" value="TraesJUL5B03G02904960.2.CDS1"/>
    <property type="gene ID" value="TraesJUL5B03G02904960"/>
</dbReference>
<dbReference type="Gramene" id="TraesJUL5D03G03137930.1">
    <property type="protein sequence ID" value="TraesJUL5D03G03137930.1.CDS1"/>
    <property type="gene ID" value="TraesJUL5D03G03137930"/>
</dbReference>
<dbReference type="Gramene" id="TraesJUL6A03G03280270.1">
    <property type="protein sequence ID" value="TraesJUL6A03G03280270.1.CDS1"/>
    <property type="gene ID" value="TraesJUL6A03G03280270"/>
</dbReference>
<dbReference type="Gramene" id="TraesJUL6A03G03280850.1">
    <property type="protein sequence ID" value="TraesJUL6A03G03280850.1.CDS1"/>
    <property type="gene ID" value="TraesJUL6A03G03280850"/>
</dbReference>
<dbReference type="Gramene" id="TraesJUL6A03G03294410.1">
    <property type="protein sequence ID" value="TraesJUL6A03G03294410.1.CDS1"/>
    <property type="gene ID" value="TraesJUL6A03G03294410"/>
</dbReference>
<dbReference type="Gramene" id="TraesJUL6A03G03319100.1">
    <property type="protein sequence ID" value="TraesJUL6A03G03319100.1.CDS1"/>
    <property type="gene ID" value="TraesJUL6A03G03319100"/>
</dbReference>
<dbReference type="Gramene" id="TraesJUL6B03G03473860.1">
    <property type="protein sequence ID" value="TraesJUL6B03G03473860.1.CDS1"/>
    <property type="gene ID" value="TraesJUL6B03G03473860"/>
</dbReference>
<dbReference type="Gramene" id="TraesJUL6B03G03474080.1">
    <property type="protein sequence ID" value="TraesJUL6B03G03474080.1.CDS1"/>
    <property type="gene ID" value="TraesJUL6B03G03474080"/>
</dbReference>
<dbReference type="Gramene" id="TraesJUL6B03G03475010.1">
    <property type="protein sequence ID" value="TraesJUL6B03G03475010.1.CDS1"/>
    <property type="gene ID" value="TraesJUL6B03G03475010"/>
</dbReference>
<dbReference type="Gramene" id="TraesJUL6D03G03694060.1">
    <property type="protein sequence ID" value="TraesJUL6D03G03694060.1.CDS1"/>
    <property type="gene ID" value="TraesJUL6D03G03694060"/>
</dbReference>
<dbReference type="Gramene" id="TraesJUL6D03G03694490.1">
    <property type="protein sequence ID" value="TraesJUL6D03G03694490.1.CDS1"/>
    <property type="gene ID" value="TraesJUL6D03G03694490"/>
</dbReference>
<dbReference type="Gramene" id="TraesJUL6D03G03703520.1">
    <property type="protein sequence ID" value="TraesJUL6D03G03703520.1.CDS1"/>
    <property type="gene ID" value="TraesJUL6D03G03703520"/>
</dbReference>
<dbReference type="Gramene" id="TraesJUL6D03G03725900.1">
    <property type="protein sequence ID" value="TraesJUL6D03G03725900.1.CDS1"/>
    <property type="gene ID" value="TraesJUL6D03G03725900"/>
</dbReference>
<dbReference type="Gramene" id="TraesJUL7A03G03870530.1">
    <property type="protein sequence ID" value="TraesJUL7A03G03870530.1.CDS1"/>
    <property type="gene ID" value="TraesJUL7A03G03870530"/>
</dbReference>
<dbReference type="Gramene" id="TraesJUL7A03G03870830.1">
    <property type="protein sequence ID" value="TraesJUL7A03G03870830.1.CDS1"/>
    <property type="gene ID" value="TraesJUL7A03G03870830"/>
</dbReference>
<dbReference type="Gramene" id="TraesJUL7A03G03870830.2">
    <property type="protein sequence ID" value="TraesJUL7A03G03870830.2.CDS1"/>
    <property type="gene ID" value="TraesJUL7A03G03870830"/>
</dbReference>
<dbReference type="Gramene" id="TraesJUL7A03G03876060.1">
    <property type="protein sequence ID" value="TraesJUL7A03G03876060.1.CDS1"/>
    <property type="gene ID" value="TraesJUL7A03G03876060"/>
</dbReference>
<dbReference type="Gramene" id="TraesJUL7A03G03876290.1">
    <property type="protein sequence ID" value="TraesJUL7A03G03876290.1.CDS1"/>
    <property type="gene ID" value="TraesJUL7A03G03876290"/>
</dbReference>
<dbReference type="Gramene" id="TraesJUL7A03G03876340.1">
    <property type="protein sequence ID" value="TraesJUL7A03G03876340.1.CDS1"/>
    <property type="gene ID" value="TraesJUL7A03G03876340"/>
</dbReference>
<dbReference type="Gramene" id="TraesJUL7A03G03876380.1">
    <property type="protein sequence ID" value="TraesJUL7A03G03876380.1.CDS1"/>
    <property type="gene ID" value="TraesJUL7A03G03876380"/>
</dbReference>
<dbReference type="Gramene" id="TraesJUL7B03G04084310.1">
    <property type="protein sequence ID" value="TraesJUL7B03G04084310.1.CDS1"/>
    <property type="gene ID" value="TraesJUL7B03G04084310"/>
</dbReference>
<dbReference type="Gramene" id="TraesJUL7B03G04084740.1">
    <property type="protein sequence ID" value="TraesJUL7B03G04084740.1.CDS1"/>
    <property type="gene ID" value="TraesJUL7B03G04084740"/>
</dbReference>
<dbReference type="Gramene" id="TraesJUL7B03G04084870.1">
    <property type="protein sequence ID" value="TraesJUL7B03G04084870.1.CDS1"/>
    <property type="gene ID" value="TraesJUL7B03G04084870"/>
</dbReference>
<dbReference type="Gramene" id="TraesJUL7B03G04084890.1">
    <property type="protein sequence ID" value="TraesJUL7B03G04084890.1.CDS1"/>
    <property type="gene ID" value="TraesJUL7B03G04084890"/>
</dbReference>
<dbReference type="Gramene" id="TraesJUL7B03G04084970.1">
    <property type="protein sequence ID" value="TraesJUL7B03G04084970.1.CDS1"/>
    <property type="gene ID" value="TraesJUL7B03G04084970"/>
</dbReference>
<dbReference type="Gramene" id="TraesJUL7B03G04085460.1">
    <property type="protein sequence ID" value="TraesJUL7B03G04085460.1.CDS1"/>
    <property type="gene ID" value="TraesJUL7B03G04085460"/>
</dbReference>
<dbReference type="Gramene" id="TraesJUL7D03G04347130.1">
    <property type="protein sequence ID" value="TraesJUL7D03G04347130.1.CDS1"/>
    <property type="gene ID" value="TraesJUL7D03G04347130"/>
</dbReference>
<dbReference type="Gramene" id="TraesJUL7D03G04347250.1">
    <property type="protein sequence ID" value="TraesJUL7D03G04347250.1.CDS1"/>
    <property type="gene ID" value="TraesJUL7D03G04347250"/>
</dbReference>
<dbReference type="Gramene" id="TraesJUL7D03G04353110.1">
    <property type="protein sequence ID" value="TraesJUL7D03G04353110.1.CDS1"/>
    <property type="gene ID" value="TraesJUL7D03G04353110"/>
</dbReference>
<dbReference type="Gramene" id="TraesJUL7D03G04353420.1">
    <property type="protein sequence ID" value="TraesJUL7D03G04353420.1.CDS1"/>
    <property type="gene ID" value="TraesJUL7D03G04353420"/>
</dbReference>
<dbReference type="Gramene" id="TraesJUL7D03G04353460.1">
    <property type="protein sequence ID" value="TraesJUL7D03G04353460.1.CDS1"/>
    <property type="gene ID" value="TraesJUL7D03G04353460"/>
</dbReference>
<dbReference type="Gramene" id="TraesJUL7D03G04362420.1">
    <property type="protein sequence ID" value="TraesJUL7D03G04362420.1.CDS1"/>
    <property type="gene ID" value="TraesJUL7D03G04362420"/>
</dbReference>
<dbReference type="Gramene" id="TraesKAR1A01G0253010.1">
    <property type="protein sequence ID" value="cds.TraesKAR1A01G0253010.1"/>
    <property type="gene ID" value="TraesKAR1A01G0253010"/>
</dbReference>
<dbReference type="Gramene" id="TraesKAR1A01G0286250.1">
    <property type="protein sequence ID" value="cds.TraesKAR1A01G0286250.1"/>
    <property type="gene ID" value="TraesKAR1A01G0286250"/>
</dbReference>
<dbReference type="Gramene" id="TraesKAR1A01G0293740.1">
    <property type="protein sequence ID" value="cds.TraesKAR1A01G0293740.1"/>
    <property type="gene ID" value="TraesKAR1A01G0293740"/>
</dbReference>
<dbReference type="Gramene" id="TraesKAR1A01G0341550.1">
    <property type="protein sequence ID" value="cds.TraesKAR1A01G0341550.1"/>
    <property type="gene ID" value="TraesKAR1A01G0341550"/>
</dbReference>
<dbReference type="Gramene" id="TraesKAR1A01G0341700.1">
    <property type="protein sequence ID" value="cds.TraesKAR1A01G0341700.1"/>
    <property type="gene ID" value="TraesKAR1A01G0341700"/>
</dbReference>
<dbReference type="Gramene" id="TraesKAR1A01G0342430.1">
    <property type="protein sequence ID" value="cds.TraesKAR1A01G0342430.1"/>
    <property type="gene ID" value="TraesKAR1A01G0342430"/>
</dbReference>
<dbReference type="Gramene" id="TraesKAR1B01G0286580.1">
    <property type="protein sequence ID" value="cds.TraesKAR1B01G0286580.1"/>
    <property type="gene ID" value="TraesKAR1B01G0286580"/>
</dbReference>
<dbReference type="Gramene" id="TraesKAR1B01G0286600.1">
    <property type="protein sequence ID" value="cds.TraesKAR1B01G0286600.1"/>
    <property type="gene ID" value="TraesKAR1B01G0286600"/>
</dbReference>
<dbReference type="Gramene" id="TraesKAR1B01G0323490.1">
    <property type="protein sequence ID" value="cds.TraesKAR1B01G0323490.1"/>
    <property type="gene ID" value="TraesKAR1B01G0323490"/>
</dbReference>
<dbReference type="Gramene" id="TraesKAR1B01G0398910.1">
    <property type="protein sequence ID" value="cds.TraesKAR1B01G0398910.1"/>
    <property type="gene ID" value="TraesKAR1B01G0398910"/>
</dbReference>
<dbReference type="Gramene" id="TraesKAR1B01G0398910.2">
    <property type="protein sequence ID" value="cds.TraesKAR1B01G0398910.2"/>
    <property type="gene ID" value="TraesKAR1B01G0398910"/>
</dbReference>
<dbReference type="Gramene" id="TraesKAR1B01G0399850.1">
    <property type="protein sequence ID" value="cds.TraesKAR1B01G0399850.1"/>
    <property type="gene ID" value="TraesKAR1B01G0399850"/>
</dbReference>
<dbReference type="Gramene" id="TraesKAR1B01G0401340.1">
    <property type="protein sequence ID" value="cds.TraesKAR1B01G0401340.1"/>
    <property type="gene ID" value="TraesKAR1B01G0401340"/>
</dbReference>
<dbReference type="Gramene" id="TraesKAR1B01G0401600.1">
    <property type="protein sequence ID" value="cds.TraesKAR1B01G0401600.1"/>
    <property type="gene ID" value="TraesKAR1B01G0401600"/>
</dbReference>
<dbReference type="Gramene" id="TraesKAR1B01G0401760.1">
    <property type="protein sequence ID" value="cds.TraesKAR1B01G0401760.1"/>
    <property type="gene ID" value="TraesKAR1B01G0401760"/>
</dbReference>
<dbReference type="Gramene" id="TraesKAR1D01G0231950.1">
    <property type="protein sequence ID" value="cds.TraesKAR1D01G0231950.1"/>
    <property type="gene ID" value="TraesKAR1D01G0231950"/>
</dbReference>
<dbReference type="Gramene" id="TraesKAR1D01G0232020.1">
    <property type="protein sequence ID" value="cds.TraesKAR1D01G0232020.1"/>
    <property type="gene ID" value="TraesKAR1D01G0232020"/>
</dbReference>
<dbReference type="Gramene" id="TraesKAR1D01G0256670.1">
    <property type="protein sequence ID" value="cds.TraesKAR1D01G0256670.1"/>
    <property type="gene ID" value="TraesKAR1D01G0256670"/>
</dbReference>
<dbReference type="Gramene" id="TraesKAR1D01G0266980.1">
    <property type="protein sequence ID" value="cds.TraesKAR1D01G0266980.1"/>
    <property type="gene ID" value="TraesKAR1D01G0266980"/>
</dbReference>
<dbReference type="Gramene" id="TraesKAR1D01G0321400.1">
    <property type="protein sequence ID" value="cds.TraesKAR1D01G0321400.1"/>
    <property type="gene ID" value="TraesKAR1D01G0321400"/>
</dbReference>
<dbReference type="Gramene" id="TraesKAR1D01G0321500.1">
    <property type="protein sequence ID" value="cds.TraesKAR1D01G0321500.1"/>
    <property type="gene ID" value="TraesKAR1D01G0321500"/>
</dbReference>
<dbReference type="Gramene" id="TraesKAR1D01G0322190.1">
    <property type="protein sequence ID" value="cds.TraesKAR1D01G0322190.1"/>
    <property type="gene ID" value="TraesKAR1D01G0322190"/>
</dbReference>
<dbReference type="Gramene" id="TraesKAR1D01G0322310.1">
    <property type="protein sequence ID" value="cds.TraesKAR1D01G0322310.1"/>
    <property type="gene ID" value="TraesKAR1D01G0322310"/>
</dbReference>
<dbReference type="Gramene" id="TraesKAR2A01G0390260.1">
    <property type="protein sequence ID" value="cds.TraesKAR2A01G0390260.1"/>
    <property type="gene ID" value="TraesKAR2A01G0390260"/>
</dbReference>
<dbReference type="Gramene" id="TraesKAR2B01G0304820.1">
    <property type="protein sequence ID" value="cds.TraesKAR2B01G0304820.1"/>
    <property type="gene ID" value="TraesKAR2B01G0304820"/>
</dbReference>
<dbReference type="Gramene" id="TraesKAR2D01G0275650.1">
    <property type="protein sequence ID" value="cds.TraesKAR2D01G0275650.1"/>
    <property type="gene ID" value="TraesKAR2D01G0275650"/>
</dbReference>
<dbReference type="Gramene" id="TraesKAR3A01G0081610.1">
    <property type="protein sequence ID" value="cds.TraesKAR3A01G0081610.1"/>
    <property type="gene ID" value="TraesKAR3A01G0081610"/>
</dbReference>
<dbReference type="Gramene" id="TraesKAR3B01G0121280.1">
    <property type="protein sequence ID" value="cds.TraesKAR3B01G0121280.1"/>
    <property type="gene ID" value="TraesKAR3B01G0121280"/>
</dbReference>
<dbReference type="Gramene" id="TraesKAR3B01G0326110.1">
    <property type="protein sequence ID" value="cds.TraesKAR3B01G0326110.1"/>
    <property type="gene ID" value="TraesKAR3B01G0326110"/>
</dbReference>
<dbReference type="Gramene" id="TraesKAR3D01G0090170.1">
    <property type="protein sequence ID" value="cds.TraesKAR3D01G0090170.1"/>
    <property type="gene ID" value="TraesKAR3D01G0090170"/>
</dbReference>
<dbReference type="Gramene" id="TraesKAR3D01G0350960.1">
    <property type="protein sequence ID" value="cds.TraesKAR3D01G0350960.1"/>
    <property type="gene ID" value="TraesKAR3D01G0350960"/>
</dbReference>
<dbReference type="Gramene" id="TraesKAR4A01G0015570.1">
    <property type="protein sequence ID" value="cds.TraesKAR4A01G0015570.1"/>
    <property type="gene ID" value="TraesKAR4A01G0015570"/>
</dbReference>
<dbReference type="Gramene" id="TraesKAR4A01G0031370.1">
    <property type="protein sequence ID" value="cds.TraesKAR4A01G0031370.1"/>
    <property type="gene ID" value="TraesKAR4A01G0031370"/>
</dbReference>
<dbReference type="Gramene" id="TraesKAR4A01G0408070.1">
    <property type="protein sequence ID" value="cds.TraesKAR4A01G0408070.1"/>
    <property type="gene ID" value="TraesKAR4A01G0408070"/>
</dbReference>
<dbReference type="Gramene" id="TraesKAR4A01G0408070.2">
    <property type="protein sequence ID" value="cds.TraesKAR4A01G0408070.2"/>
    <property type="gene ID" value="TraesKAR4A01G0408070"/>
</dbReference>
<dbReference type="Gramene" id="TraesKAR4A01G0408200.1">
    <property type="protein sequence ID" value="cds.TraesKAR4A01G0408200.1"/>
    <property type="gene ID" value="TraesKAR4A01G0408200"/>
</dbReference>
<dbReference type="Gramene" id="TraesKAR4B01G0372140.1">
    <property type="protein sequence ID" value="cds.TraesKAR4B01G0372140.1"/>
    <property type="gene ID" value="TraesKAR4B01G0372140"/>
</dbReference>
<dbReference type="Gramene" id="TraesKAR4D01G0298210.1">
    <property type="protein sequence ID" value="cds.TraesKAR4D01G0298210.1"/>
    <property type="gene ID" value="TraesKAR4D01G0298210"/>
</dbReference>
<dbReference type="Gramene" id="TraesKAR4D01G0320090.1">
    <property type="protein sequence ID" value="cds.TraesKAR4D01G0320090.1"/>
    <property type="gene ID" value="TraesKAR4D01G0320090"/>
</dbReference>
<dbReference type="Gramene" id="TraesKAR5B01G0221930.1">
    <property type="protein sequence ID" value="cds.TraesKAR5B01G0221930.1"/>
    <property type="gene ID" value="TraesKAR5B01G0221930"/>
</dbReference>
<dbReference type="Gramene" id="TraesKAR5D01G0215460.1">
    <property type="protein sequence ID" value="cds.TraesKAR5D01G0215460.1"/>
    <property type="gene ID" value="TraesKAR5D01G0215460"/>
</dbReference>
<dbReference type="Gramene" id="TraesKAR6A01G0024590.1">
    <property type="protein sequence ID" value="cds.TraesKAR6A01G0024590.1"/>
    <property type="gene ID" value="TraesKAR6A01G0024590"/>
</dbReference>
<dbReference type="Gramene" id="TraesKAR6A01G0046360.1">
    <property type="protein sequence ID" value="cds.TraesKAR6A01G0046360.1"/>
    <property type="gene ID" value="TraesKAR6A01G0046360"/>
</dbReference>
<dbReference type="Gramene" id="TraesKAR6A01G0094380.1">
    <property type="protein sequence ID" value="cds.TraesKAR6A01G0094380.1"/>
    <property type="gene ID" value="TraesKAR6A01G0094380"/>
</dbReference>
<dbReference type="Gramene" id="TraesKAR6B01G0043450.1">
    <property type="protein sequence ID" value="cds.TraesKAR6B01G0043450.1"/>
    <property type="gene ID" value="TraesKAR6B01G0043450"/>
</dbReference>
<dbReference type="Gramene" id="TraesKAR6B01G0043890.1">
    <property type="protein sequence ID" value="cds.TraesKAR6B01G0043890.1"/>
    <property type="gene ID" value="TraesKAR6B01G0043890"/>
</dbReference>
<dbReference type="Gramene" id="TraesKAR6B01G0045880.1">
    <property type="protein sequence ID" value="cds.TraesKAR6B01G0045880.1"/>
    <property type="gene ID" value="TraesKAR6B01G0045880"/>
</dbReference>
<dbReference type="Gramene" id="TraesKAR6D01G0028520.1">
    <property type="protein sequence ID" value="cds.TraesKAR6D01G0028520.1"/>
    <property type="gene ID" value="TraesKAR6D01G0028520"/>
</dbReference>
<dbReference type="Gramene" id="TraesKAR6D01G0029120.1">
    <property type="protein sequence ID" value="cds.TraesKAR6D01G0029120.1"/>
    <property type="gene ID" value="TraesKAR6D01G0029120"/>
</dbReference>
<dbReference type="Gramene" id="TraesKAR6D01G0056260.1">
    <property type="protein sequence ID" value="cds.TraesKAR6D01G0056260.1"/>
    <property type="gene ID" value="TraesKAR6D01G0056260"/>
</dbReference>
<dbReference type="Gramene" id="TraesKAR6D01G0098840.1">
    <property type="protein sequence ID" value="cds.TraesKAR6D01G0098840.1"/>
    <property type="gene ID" value="TraesKAR6D01G0098840"/>
</dbReference>
<dbReference type="Gramene" id="TraesKAR7A01G0047170.1">
    <property type="protein sequence ID" value="cds.TraesKAR7A01G0047170.1"/>
    <property type="gene ID" value="TraesKAR7A01G0047170"/>
</dbReference>
<dbReference type="Gramene" id="TraesKAR7A01G0047480.1">
    <property type="protein sequence ID" value="cds.TraesKAR7A01G0047480.1"/>
    <property type="gene ID" value="TraesKAR7A01G0047480"/>
</dbReference>
<dbReference type="Gramene" id="TraesKAR7A01G0055760.1">
    <property type="protein sequence ID" value="cds.TraesKAR7A01G0055760.1"/>
    <property type="gene ID" value="TraesKAR7A01G0055760"/>
</dbReference>
<dbReference type="Gramene" id="TraesKAR7A01G0056000.1">
    <property type="protein sequence ID" value="cds.TraesKAR7A01G0056000.1"/>
    <property type="gene ID" value="TraesKAR7A01G0056000"/>
</dbReference>
<dbReference type="Gramene" id="TraesKAR7A01G0056040.1">
    <property type="protein sequence ID" value="cds.TraesKAR7A01G0056040.1"/>
    <property type="gene ID" value="TraesKAR7A01G0056040"/>
</dbReference>
<dbReference type="Gramene" id="TraesKAR7A01G0056260.1">
    <property type="protein sequence ID" value="cds.TraesKAR7A01G0056260.1"/>
    <property type="gene ID" value="TraesKAR7A01G0056260"/>
</dbReference>
<dbReference type="Gramene" id="TraesKAR7B01G0010690.1">
    <property type="protein sequence ID" value="cds.TraesKAR7B01G0010690.1"/>
    <property type="gene ID" value="TraesKAR7B01G0010690"/>
</dbReference>
<dbReference type="Gramene" id="TraesKAR7B01G0011400.1">
    <property type="protein sequence ID" value="cds.TraesKAR7B01G0011400.1"/>
    <property type="gene ID" value="TraesKAR7B01G0011400"/>
</dbReference>
<dbReference type="Gramene" id="TraesKAR7B01G0011450.1">
    <property type="protein sequence ID" value="cds.TraesKAR7B01G0011450.1"/>
    <property type="gene ID" value="TraesKAR7B01G0011450"/>
</dbReference>
<dbReference type="Gramene" id="TraesKAR7B01G0012270.1">
    <property type="protein sequence ID" value="cds.TraesKAR7B01G0012270.1"/>
    <property type="gene ID" value="TraesKAR7B01G0012270"/>
</dbReference>
<dbReference type="Gramene" id="TraesKAR7B01G0012560.1">
    <property type="protein sequence ID" value="cds.TraesKAR7B01G0012560.1"/>
    <property type="gene ID" value="TraesKAR7B01G0012560"/>
</dbReference>
<dbReference type="Gramene" id="TraesKAR7B01G0012670.1">
    <property type="protein sequence ID" value="cds.TraesKAR7B01G0012670.1"/>
    <property type="gene ID" value="TraesKAR7B01G0012670"/>
</dbReference>
<dbReference type="Gramene" id="TraesKAR7B01G0013480.1">
    <property type="protein sequence ID" value="cds.TraesKAR7B01G0013480.1"/>
    <property type="gene ID" value="TraesKAR7B01G0013480"/>
</dbReference>
<dbReference type="Gramene" id="TraesKAR7D01G0045390.1">
    <property type="protein sequence ID" value="cds.TraesKAR7D01G0045390.1"/>
    <property type="gene ID" value="TraesKAR7D01G0045390"/>
</dbReference>
<dbReference type="Gramene" id="TraesKAR7D01G0054370.1">
    <property type="protein sequence ID" value="cds.TraesKAR7D01G0054370.1"/>
    <property type="gene ID" value="TraesKAR7D01G0054370"/>
</dbReference>
<dbReference type="Gramene" id="TraesKAR7D01G0055100.1">
    <property type="protein sequence ID" value="cds.TraesKAR7D01G0055100.1"/>
    <property type="gene ID" value="TraesKAR7D01G0055100"/>
</dbReference>
<dbReference type="Gramene" id="TraesKAR7D01G0055140.1">
    <property type="protein sequence ID" value="cds.TraesKAR7D01G0055140.1"/>
    <property type="gene ID" value="TraesKAR7D01G0055140"/>
</dbReference>
<dbReference type="Gramene" id="TraesKAR7D01G0069590.1">
    <property type="protein sequence ID" value="cds.TraesKAR7D01G0069590.1"/>
    <property type="gene ID" value="TraesKAR7D01G0069590"/>
</dbReference>
<dbReference type="Gramene" id="TraesLAC1A03G00109490.1">
    <property type="protein sequence ID" value="TraesLAC1A03G00109490.1.CDS1"/>
    <property type="gene ID" value="TraesLAC1A03G00109490"/>
</dbReference>
<dbReference type="Gramene" id="TraesLAC1A03G00122500.1">
    <property type="protein sequence ID" value="TraesLAC1A03G00122500.1.CDS1"/>
    <property type="gene ID" value="TraesLAC1A03G00122500"/>
</dbReference>
<dbReference type="Gramene" id="TraesLAC1A03G00126430.1">
    <property type="protein sequence ID" value="TraesLAC1A03G00126430.1.CDS1"/>
    <property type="gene ID" value="TraesLAC1A03G00126430"/>
</dbReference>
<dbReference type="Gramene" id="TraesLAC1A03G00155490.1">
    <property type="protein sequence ID" value="TraesLAC1A03G00155490.1.CDS1"/>
    <property type="gene ID" value="TraesLAC1A03G00155490"/>
</dbReference>
<dbReference type="Gramene" id="TraesLAC1A03G00155600.1">
    <property type="protein sequence ID" value="TraesLAC1A03G00155600.1.CDS1"/>
    <property type="gene ID" value="TraesLAC1A03G00155600"/>
</dbReference>
<dbReference type="Gramene" id="TraesLAC1A03G00156010.1">
    <property type="protein sequence ID" value="TraesLAC1A03G00156010.1.CDS1"/>
    <property type="gene ID" value="TraesLAC1A03G00156010"/>
</dbReference>
<dbReference type="Gramene" id="TraesLAC1B03G00311460.1">
    <property type="protein sequence ID" value="TraesLAC1B03G00311460.1.CDS1"/>
    <property type="gene ID" value="TraesLAC1B03G00311460"/>
</dbReference>
<dbReference type="Gramene" id="TraesLAC1B03G00311490.1">
    <property type="protein sequence ID" value="TraesLAC1B03G00311490.1.CDS1"/>
    <property type="gene ID" value="TraesLAC1B03G00311490"/>
</dbReference>
<dbReference type="Gramene" id="TraesLAC1B03G00327770.1">
    <property type="protein sequence ID" value="TraesLAC1B03G00327770.1.CDS1"/>
    <property type="gene ID" value="TraesLAC1B03G00327770"/>
</dbReference>
<dbReference type="Gramene" id="TraesLAC1B03G00368380.1">
    <property type="protein sequence ID" value="TraesLAC1B03G00368380.1.CDS1"/>
    <property type="gene ID" value="TraesLAC1B03G00368380"/>
</dbReference>
<dbReference type="Gramene" id="TraesLAC1B03G00368880.1">
    <property type="protein sequence ID" value="TraesLAC1B03G00368880.1.CDS1"/>
    <property type="gene ID" value="TraesLAC1B03G00368880"/>
</dbReference>
<dbReference type="Gramene" id="TraesLAC1B03G00369570.1">
    <property type="protein sequence ID" value="TraesLAC1B03G00369570.1.CDS1"/>
    <property type="gene ID" value="TraesLAC1B03G00369570"/>
</dbReference>
<dbReference type="Gramene" id="TraesLAC1B03G00369710.1">
    <property type="protein sequence ID" value="TraesLAC1B03G00369710.1.CDS1"/>
    <property type="gene ID" value="TraesLAC1B03G00369710"/>
</dbReference>
<dbReference type="Gramene" id="TraesLAC1B03G00369750.1">
    <property type="protein sequence ID" value="TraesLAC1B03G00369750.1.CDS1"/>
    <property type="gene ID" value="TraesLAC1B03G00369750"/>
</dbReference>
<dbReference type="Gramene" id="TraesLAC1D03G00505870.1">
    <property type="protein sequence ID" value="TraesLAC1D03G00505870.1.CDS1"/>
    <property type="gene ID" value="TraesLAC1D03G00505870"/>
</dbReference>
<dbReference type="Gramene" id="TraesLAC1D03G00505920.1">
    <property type="protein sequence ID" value="TraesLAC1D03G00505920.1.CDS1"/>
    <property type="gene ID" value="TraesLAC1D03G00505920"/>
</dbReference>
<dbReference type="Gramene" id="TraesLAC1D03G00516080.1">
    <property type="protein sequence ID" value="TraesLAC1D03G00516080.1.CDS1"/>
    <property type="gene ID" value="TraesLAC1D03G00516080"/>
</dbReference>
<dbReference type="Gramene" id="TraesLAC1D03G00520810.1">
    <property type="protein sequence ID" value="TraesLAC1D03G00520810.1.CDS1"/>
    <property type="gene ID" value="TraesLAC1D03G00520810"/>
</dbReference>
<dbReference type="Gramene" id="TraesLAC1D03G00552380.1">
    <property type="protein sequence ID" value="TraesLAC1D03G00552380.1.CDS1"/>
    <property type="gene ID" value="TraesLAC1D03G00552380"/>
</dbReference>
<dbReference type="Gramene" id="TraesLAC1D03G00552470.1">
    <property type="protein sequence ID" value="TraesLAC1D03G00552470.1.CDS1"/>
    <property type="gene ID" value="TraesLAC1D03G00552470"/>
</dbReference>
<dbReference type="Gramene" id="TraesLAC1D03G00552980.1">
    <property type="protein sequence ID" value="TraesLAC1D03G00552980.1.CDS1"/>
    <property type="gene ID" value="TraesLAC1D03G00552980"/>
</dbReference>
<dbReference type="Gramene" id="TraesLAC1D03G00553080.1">
    <property type="protein sequence ID" value="TraesLAC1D03G00553080.1.CDS1"/>
    <property type="gene ID" value="TraesLAC1D03G00553080"/>
</dbReference>
<dbReference type="Gramene" id="TraesLAC2A03G00750710.1">
    <property type="protein sequence ID" value="TraesLAC2A03G00750710.1.CDS1"/>
    <property type="gene ID" value="TraesLAC2A03G00750710"/>
</dbReference>
<dbReference type="Gramene" id="TraesLAC2B03G00878080.1">
    <property type="protein sequence ID" value="TraesLAC2B03G00878080.1.CDS1"/>
    <property type="gene ID" value="TraesLAC2B03G00878080"/>
</dbReference>
<dbReference type="Gramene" id="TraesLAC2D03G01153780.1">
    <property type="protein sequence ID" value="TraesLAC2D03G01153780.1.CDS1"/>
    <property type="gene ID" value="TraesLAC2D03G01153780"/>
</dbReference>
<dbReference type="Gramene" id="TraesLAC3A03G01300120.1">
    <property type="protein sequence ID" value="TraesLAC3A03G01300120.1.CDS1"/>
    <property type="gene ID" value="TraesLAC3A03G01300120"/>
</dbReference>
<dbReference type="Gramene" id="TraesLAC3A03G01412450.1">
    <property type="protein sequence ID" value="TraesLAC3A03G01412450.1.CDS1"/>
    <property type="gene ID" value="TraesLAC3A03G01412450"/>
</dbReference>
<dbReference type="Gramene" id="TraesLAC3B03G01541060.1">
    <property type="protein sequence ID" value="TraesLAC3B03G01541060.1.CDS1"/>
    <property type="gene ID" value="TraesLAC3B03G01541060"/>
</dbReference>
<dbReference type="Gramene" id="TraesLAC3B03G01614260.1">
    <property type="protein sequence ID" value="TraesLAC3B03G01614260.1.CDS1"/>
    <property type="gene ID" value="TraesLAC3B03G01614260"/>
</dbReference>
<dbReference type="Gramene" id="TraesLAC3D03G01787010.1">
    <property type="protein sequence ID" value="TraesLAC3D03G01787010.1.CDS1"/>
    <property type="gene ID" value="TraesLAC3D03G01787010"/>
</dbReference>
<dbReference type="Gramene" id="TraesLAC3D03G01884850.1">
    <property type="protein sequence ID" value="TraesLAC3D03G01884850.1.CDS1"/>
    <property type="gene ID" value="TraesLAC3D03G01884850"/>
</dbReference>
<dbReference type="Gramene" id="TraesLAC4A03G01967250.1">
    <property type="protein sequence ID" value="TraesLAC4A03G01967250.1.CDS1"/>
    <property type="gene ID" value="TraesLAC4A03G01967250"/>
</dbReference>
<dbReference type="Gramene" id="TraesLAC4A03G01976390.1">
    <property type="protein sequence ID" value="TraesLAC4A03G01976390.1.CDS1"/>
    <property type="gene ID" value="TraesLAC4A03G01976390"/>
</dbReference>
<dbReference type="Gramene" id="TraesLAC4A03G02129860.1">
    <property type="protein sequence ID" value="TraesLAC4A03G02129860.1.CDS1"/>
    <property type="gene ID" value="TraesLAC4A03G02129860"/>
</dbReference>
<dbReference type="Gramene" id="TraesLAC4A03G02129900.1">
    <property type="protein sequence ID" value="TraesLAC4A03G02129900.1.CDS1"/>
    <property type="gene ID" value="TraesLAC4A03G02129900"/>
</dbReference>
<dbReference type="Gramene" id="TraesLAC4B03G02319850.1">
    <property type="protein sequence ID" value="TraesLAC4B03G02319850.1.CDS1"/>
    <property type="gene ID" value="TraesLAC4B03G02319850"/>
</dbReference>
<dbReference type="Gramene" id="TraesLAC4D03G02479040.1">
    <property type="protein sequence ID" value="TraesLAC4D03G02479040.1.CDS1"/>
    <property type="gene ID" value="TraesLAC4D03G02479040"/>
</dbReference>
<dbReference type="Gramene" id="TraesLAC4D03G02488750.1">
    <property type="protein sequence ID" value="TraesLAC4D03G02488750.1.CDS1"/>
    <property type="gene ID" value="TraesLAC4D03G02488750"/>
</dbReference>
<dbReference type="Gramene" id="TraesLAC5B03G02837270.1">
    <property type="protein sequence ID" value="TraesLAC5B03G02837270.1.CDS1"/>
    <property type="gene ID" value="TraesLAC5B03G02837270"/>
</dbReference>
<dbReference type="Gramene" id="TraesLAC5B03G02837270.2">
    <property type="protein sequence ID" value="TraesLAC5B03G02837270.2.CDS1"/>
    <property type="gene ID" value="TraesLAC5B03G02837270"/>
</dbReference>
<dbReference type="Gramene" id="TraesLAC5D03G03068660.1">
    <property type="protein sequence ID" value="TraesLAC5D03G03068660.1.CDS1"/>
    <property type="gene ID" value="TraesLAC5D03G03068660"/>
</dbReference>
<dbReference type="Gramene" id="TraesLAC6A03G03208650.1">
    <property type="protein sequence ID" value="TraesLAC6A03G03208650.1.CDS1"/>
    <property type="gene ID" value="TraesLAC6A03G03208650"/>
</dbReference>
<dbReference type="Gramene" id="TraesLAC6A03G03222420.1">
    <property type="protein sequence ID" value="TraesLAC6A03G03222420.1.CDS1"/>
    <property type="gene ID" value="TraesLAC6A03G03222420"/>
</dbReference>
<dbReference type="Gramene" id="TraesLAC6A03G03247570.1">
    <property type="protein sequence ID" value="TraesLAC6A03G03247570.1.CDS1"/>
    <property type="gene ID" value="TraesLAC6A03G03247570"/>
</dbReference>
<dbReference type="Gramene" id="TraesLAC6B03G03401190.1">
    <property type="protein sequence ID" value="TraesLAC6B03G03401190.1.CDS1"/>
    <property type="gene ID" value="TraesLAC6B03G03401190"/>
</dbReference>
<dbReference type="Gramene" id="TraesLAC6B03G03401460.1">
    <property type="protein sequence ID" value="TraesLAC6B03G03401460.1.CDS1"/>
    <property type="gene ID" value="TraesLAC6B03G03401460"/>
</dbReference>
<dbReference type="Gramene" id="TraesLAC6B03G03402470.1">
    <property type="protein sequence ID" value="TraesLAC6B03G03402470.1.CDS1"/>
    <property type="gene ID" value="TraesLAC6B03G03402470"/>
</dbReference>
<dbReference type="Gramene" id="TraesLAC6D03G03620910.1">
    <property type="protein sequence ID" value="TraesLAC6D03G03620910.1.CDS1"/>
    <property type="gene ID" value="TraesLAC6D03G03620910"/>
</dbReference>
<dbReference type="Gramene" id="TraesLAC6D03G03643660.1">
    <property type="protein sequence ID" value="TraesLAC6D03G03643660.1.CDS1"/>
    <property type="gene ID" value="TraesLAC6D03G03643660"/>
</dbReference>
<dbReference type="Gramene" id="TraesLAC7A03G03786790.1">
    <property type="protein sequence ID" value="TraesLAC7A03G03786790.1.CDS1"/>
    <property type="gene ID" value="TraesLAC7A03G03786790"/>
</dbReference>
<dbReference type="Gramene" id="TraesLAC7A03G03787110.1">
    <property type="protein sequence ID" value="TraesLAC7A03G03787110.1.CDS1"/>
    <property type="gene ID" value="TraesLAC7A03G03787110"/>
</dbReference>
<dbReference type="Gramene" id="TraesLAC7A03G03791790.1">
    <property type="protein sequence ID" value="TraesLAC7A03G03791790.1.CDS1"/>
    <property type="gene ID" value="TraesLAC7A03G03791790"/>
</dbReference>
<dbReference type="Gramene" id="TraesLAC7A03G03791860.1">
    <property type="protein sequence ID" value="TraesLAC7A03G03791860.1.CDS1"/>
    <property type="gene ID" value="TraesLAC7A03G03791860"/>
</dbReference>
<dbReference type="Gramene" id="TraesLAC7A03G03792070.1">
    <property type="protein sequence ID" value="TraesLAC7A03G03792070.1.CDS1"/>
    <property type="gene ID" value="TraesLAC7A03G03792070"/>
</dbReference>
<dbReference type="Gramene" id="TraesLAC7A03G03793830.1">
    <property type="protein sequence ID" value="TraesLAC7A03G03793830.1.CDS1"/>
    <property type="gene ID" value="TraesLAC7A03G03793830"/>
</dbReference>
<dbReference type="Gramene" id="TraesLAC7B03G03998600.1">
    <property type="protein sequence ID" value="TraesLAC7B03G03998600.1.CDS1"/>
    <property type="gene ID" value="TraesLAC7B03G03998600"/>
</dbReference>
<dbReference type="Gramene" id="TraesLAC7B03G03999060.1">
    <property type="protein sequence ID" value="TraesLAC7B03G03999060.1.CDS1"/>
    <property type="gene ID" value="TraesLAC7B03G03999060"/>
</dbReference>
<dbReference type="Gramene" id="TraesLAC7B03G03999130.1">
    <property type="protein sequence ID" value="TraesLAC7B03G03999130.1.CDS1"/>
    <property type="gene ID" value="TraesLAC7B03G03999130"/>
</dbReference>
<dbReference type="Gramene" id="TraesLAC7B03G03999440.1">
    <property type="protein sequence ID" value="TraesLAC7B03G03999440.1.CDS1"/>
    <property type="gene ID" value="TraesLAC7B03G03999440"/>
</dbReference>
<dbReference type="Gramene" id="TraesLAC7B03G03999540.1">
    <property type="protein sequence ID" value="TraesLAC7B03G03999540.1.CDS1"/>
    <property type="gene ID" value="TraesLAC7B03G03999540"/>
</dbReference>
<dbReference type="Gramene" id="TraesLAC7B03G03999570.1">
    <property type="protein sequence ID" value="TraesLAC7B03G03999570.1.CDS1"/>
    <property type="gene ID" value="TraesLAC7B03G03999570"/>
</dbReference>
<dbReference type="Gramene" id="TraesLAC7B03G03999660.1">
    <property type="protein sequence ID" value="TraesLAC7B03G03999660.1.CDS1"/>
    <property type="gene ID" value="TraesLAC7B03G03999660"/>
</dbReference>
<dbReference type="Gramene" id="TraesLAC7B03G04000200.1">
    <property type="protein sequence ID" value="TraesLAC7B03G04000200.1.CDS1"/>
    <property type="gene ID" value="TraesLAC7B03G04000200"/>
</dbReference>
<dbReference type="Gramene" id="TraesLAC7B03G04011160.1">
    <property type="protein sequence ID" value="TraesLAC7B03G04011160.1.CDS1"/>
    <property type="gene ID" value="TraesLAC7B03G04011160"/>
</dbReference>
<dbReference type="Gramene" id="TraesLAC7D03G04250440.1">
    <property type="protein sequence ID" value="TraesLAC7D03G04250440.1.CDS1"/>
    <property type="gene ID" value="TraesLAC7D03G04250440"/>
</dbReference>
<dbReference type="Gramene" id="TraesLAC7D03G04250580.1">
    <property type="protein sequence ID" value="TraesLAC7D03G04250580.1.CDS1"/>
    <property type="gene ID" value="TraesLAC7D03G04250580"/>
</dbReference>
<dbReference type="Gramene" id="TraesLAC7D03G04256480.1">
    <property type="protein sequence ID" value="TraesLAC7D03G04256480.1.CDS1"/>
    <property type="gene ID" value="TraesLAC7D03G04256480"/>
</dbReference>
<dbReference type="Gramene" id="TraesLAC7D03G04256800.1">
    <property type="protein sequence ID" value="TraesLAC7D03G04256800.1.CDS1"/>
    <property type="gene ID" value="TraesLAC7D03G04256800"/>
</dbReference>
<dbReference type="Gramene" id="TraesLAC7D03G04256850.1">
    <property type="protein sequence ID" value="TraesLAC7D03G04256850.1.CDS1"/>
    <property type="gene ID" value="TraesLAC7D03G04256850"/>
</dbReference>
<dbReference type="Gramene" id="TraesLAC7D03G04265770.1">
    <property type="protein sequence ID" value="TraesLAC7D03G04265770.1.CDS1"/>
    <property type="gene ID" value="TraesLAC7D03G04265770"/>
</dbReference>
<dbReference type="Gramene" id="TraesLACUn03G04447720.1">
    <property type="protein sequence ID" value="TraesLACUn03G04447720.1.CDS1"/>
    <property type="gene ID" value="TraesLACUn03G04447720"/>
</dbReference>
<dbReference type="Gramene" id="TraesLACUn03G04448180.1">
    <property type="protein sequence ID" value="TraesLACUn03G04448180.1.CDS1"/>
    <property type="gene ID" value="TraesLACUn03G04448180"/>
</dbReference>
<dbReference type="Gramene" id="TraesLDM1A03G00107280.1">
    <property type="protein sequence ID" value="TraesLDM1A03G00107280.1.CDS1"/>
    <property type="gene ID" value="TraesLDM1A03G00107280"/>
</dbReference>
<dbReference type="Gramene" id="TraesLDM1A03G00120110.1">
    <property type="protein sequence ID" value="TraesLDM1A03G00120110.1.CDS1"/>
    <property type="gene ID" value="TraesLDM1A03G00120110"/>
</dbReference>
<dbReference type="Gramene" id="TraesLDM1A03G00124010.1">
    <property type="protein sequence ID" value="TraesLDM1A03G00124010.1.CDS1"/>
    <property type="gene ID" value="TraesLDM1A03G00124010"/>
</dbReference>
<dbReference type="Gramene" id="TraesLDM1A03G00152690.1">
    <property type="protein sequence ID" value="TraesLDM1A03G00152690.1.CDS1"/>
    <property type="gene ID" value="TraesLDM1A03G00152690"/>
</dbReference>
<dbReference type="Gramene" id="TraesLDM1A03G00152840.1">
    <property type="protein sequence ID" value="TraesLDM1A03G00152840.1.CDS1"/>
    <property type="gene ID" value="TraesLDM1A03G00152840"/>
</dbReference>
<dbReference type="Gramene" id="TraesLDM1A03G00153220.1">
    <property type="protein sequence ID" value="TraesLDM1A03G00153220.1.CDS1"/>
    <property type="gene ID" value="TraesLDM1A03G00153220"/>
</dbReference>
<dbReference type="Gramene" id="TraesLDM1B03G00308390.1">
    <property type="protein sequence ID" value="TraesLDM1B03G00308390.1.CDS1"/>
    <property type="gene ID" value="TraesLDM1B03G00308390"/>
</dbReference>
<dbReference type="Gramene" id="TraesLDM1B03G00308430.1">
    <property type="protein sequence ID" value="TraesLDM1B03G00308430.1.CDS1"/>
    <property type="gene ID" value="TraesLDM1B03G00308430"/>
</dbReference>
<dbReference type="Gramene" id="TraesLDM1B03G00325060.1">
    <property type="protein sequence ID" value="TraesLDM1B03G00325060.1.CDS1"/>
    <property type="gene ID" value="TraesLDM1B03G00325060"/>
</dbReference>
<dbReference type="Gramene" id="TraesLDM1B03G00365320.1">
    <property type="protein sequence ID" value="TraesLDM1B03G00365320.1.CDS1"/>
    <property type="gene ID" value="TraesLDM1B03G00365320"/>
</dbReference>
<dbReference type="Gramene" id="TraesLDM1B03G00365320.2">
    <property type="protein sequence ID" value="TraesLDM1B03G00365320.2.CDS1"/>
    <property type="gene ID" value="TraesLDM1B03G00365320"/>
</dbReference>
<dbReference type="Gramene" id="TraesLDM1B03G00365810.1">
    <property type="protein sequence ID" value="TraesLDM1B03G00365810.1.CDS1"/>
    <property type="gene ID" value="TraesLDM1B03G00365810"/>
</dbReference>
<dbReference type="Gramene" id="TraesLDM1B03G00366480.1">
    <property type="protein sequence ID" value="TraesLDM1B03G00366480.1.CDS1"/>
    <property type="gene ID" value="TraesLDM1B03G00366480"/>
</dbReference>
<dbReference type="Gramene" id="TraesLDM1B03G00366620.1">
    <property type="protein sequence ID" value="TraesLDM1B03G00366620.1.CDS1"/>
    <property type="gene ID" value="TraesLDM1B03G00366620"/>
</dbReference>
<dbReference type="Gramene" id="TraesLDM1B03G00366670.1">
    <property type="protein sequence ID" value="TraesLDM1B03G00366670.1.CDS1"/>
    <property type="gene ID" value="TraesLDM1B03G00366670"/>
</dbReference>
<dbReference type="Gramene" id="TraesLDM1D03G00505410.1">
    <property type="protein sequence ID" value="TraesLDM1D03G00505410.1.CDS1"/>
    <property type="gene ID" value="TraesLDM1D03G00505410"/>
</dbReference>
<dbReference type="Gramene" id="TraesLDM1D03G00505450.1">
    <property type="protein sequence ID" value="TraesLDM1D03G00505450.1.CDS1"/>
    <property type="gene ID" value="TraesLDM1D03G00505450"/>
</dbReference>
<dbReference type="Gramene" id="TraesLDM1D03G00515410.1">
    <property type="protein sequence ID" value="TraesLDM1D03G00515410.1.CDS1"/>
    <property type="gene ID" value="TraesLDM1D03G00515410"/>
</dbReference>
<dbReference type="Gramene" id="TraesLDM1D03G00520130.1">
    <property type="protein sequence ID" value="TraesLDM1D03G00520130.1.CDS1"/>
    <property type="gene ID" value="TraesLDM1D03G00520130"/>
</dbReference>
<dbReference type="Gramene" id="TraesLDM1D03G00551000.1">
    <property type="protein sequence ID" value="TraesLDM1D03G00551000.1.CDS1"/>
    <property type="gene ID" value="TraesLDM1D03G00551000"/>
</dbReference>
<dbReference type="Gramene" id="TraesLDM1D03G00551080.1">
    <property type="protein sequence ID" value="TraesLDM1D03G00551080.1.CDS1"/>
    <property type="gene ID" value="TraesLDM1D03G00551080"/>
</dbReference>
<dbReference type="Gramene" id="TraesLDM1D03G00551610.1">
    <property type="protein sequence ID" value="TraesLDM1D03G00551610.1.CDS1"/>
    <property type="gene ID" value="TraesLDM1D03G00551610"/>
</dbReference>
<dbReference type="Gramene" id="TraesLDM1D03G00551700.1">
    <property type="protein sequence ID" value="TraesLDM1D03G00551700.1.CDS1"/>
    <property type="gene ID" value="TraesLDM1D03G00551700"/>
</dbReference>
<dbReference type="Gramene" id="TraesLDM2A03G00749460.1">
    <property type="protein sequence ID" value="TraesLDM2A03G00749460.1.CDS1"/>
    <property type="gene ID" value="TraesLDM2A03G00749460"/>
</dbReference>
<dbReference type="Gramene" id="TraesLDM2B03G00961030.1">
    <property type="protein sequence ID" value="TraesLDM2B03G00961030.1.CDS1"/>
    <property type="gene ID" value="TraesLDM2B03G00961030"/>
</dbReference>
<dbReference type="Gramene" id="TraesLDM2D03G01203100.1">
    <property type="protein sequence ID" value="TraesLDM2D03G01203100.1.CDS1"/>
    <property type="gene ID" value="TraesLDM2D03G01203100"/>
</dbReference>
<dbReference type="Gramene" id="TraesLDM3A03G01358730.1">
    <property type="protein sequence ID" value="TraesLDM3A03G01358730.1.CDS1"/>
    <property type="gene ID" value="TraesLDM3A03G01358730"/>
</dbReference>
<dbReference type="Gramene" id="TraesLDM3A03G01469110.1">
    <property type="protein sequence ID" value="TraesLDM3A03G01469110.1.CDS1"/>
    <property type="gene ID" value="TraesLDM3A03G01469110"/>
</dbReference>
<dbReference type="Gramene" id="TraesLDM3B03G01599610.1">
    <property type="protein sequence ID" value="TraesLDM3B03G01599610.1.CDS1"/>
    <property type="gene ID" value="TraesLDM3B03G01599610"/>
</dbReference>
<dbReference type="Gramene" id="TraesLDM3B03G01671400.1">
    <property type="protein sequence ID" value="TraesLDM3B03G01671400.1.CDS1"/>
    <property type="gene ID" value="TraesLDM3B03G01671400"/>
</dbReference>
<dbReference type="Gramene" id="TraesLDM3D03G01844050.1">
    <property type="protein sequence ID" value="TraesLDM3D03G01844050.1.CDS1"/>
    <property type="gene ID" value="TraesLDM3D03G01844050"/>
</dbReference>
<dbReference type="Gramene" id="TraesLDM3D03G01935620.1">
    <property type="protein sequence ID" value="TraesLDM3D03G01935620.1.CDS1"/>
    <property type="gene ID" value="TraesLDM3D03G01935620"/>
</dbReference>
<dbReference type="Gramene" id="TraesLDM4A03G02012510.1">
    <property type="protein sequence ID" value="TraesLDM4A03G02012510.1.CDS1"/>
    <property type="gene ID" value="TraesLDM4A03G02012510"/>
</dbReference>
<dbReference type="Gramene" id="TraesLDM4A03G02021830.1">
    <property type="protein sequence ID" value="TraesLDM4A03G02021830.1.CDS1"/>
    <property type="gene ID" value="TraesLDM4A03G02021830"/>
</dbReference>
<dbReference type="Gramene" id="TraesLDM4A03G02175630.1">
    <property type="protein sequence ID" value="TraesLDM4A03G02175630.1.CDS1"/>
    <property type="gene ID" value="TraesLDM4A03G02175630"/>
</dbReference>
<dbReference type="Gramene" id="TraesLDM4A03G02175690.1">
    <property type="protein sequence ID" value="TraesLDM4A03G02175690.1.CDS1"/>
    <property type="gene ID" value="TraesLDM4A03G02175690"/>
</dbReference>
<dbReference type="Gramene" id="TraesLDM4B03G02367050.1">
    <property type="protein sequence ID" value="TraesLDM4B03G02367050.1.CDS1"/>
    <property type="gene ID" value="TraesLDM4B03G02367050"/>
</dbReference>
<dbReference type="Gramene" id="TraesLDM4D03G02527730.1">
    <property type="protein sequence ID" value="TraesLDM4D03G02527730.1.CDS1"/>
    <property type="gene ID" value="TraesLDM4D03G02527730"/>
</dbReference>
<dbReference type="Gramene" id="TraesLDM4D03G02537590.1">
    <property type="protein sequence ID" value="TraesLDM4D03G02537590.1.CDS1"/>
    <property type="gene ID" value="TraesLDM4D03G02537590"/>
</dbReference>
<dbReference type="Gramene" id="TraesLDM5B03G02886240.1">
    <property type="protein sequence ID" value="TraesLDM5B03G02886240.1.CDS1"/>
    <property type="gene ID" value="TraesLDM5B03G02886240"/>
</dbReference>
<dbReference type="Gramene" id="TraesLDM5D03G03117500.1">
    <property type="protein sequence ID" value="TraesLDM5D03G03117500.1.CDS1"/>
    <property type="gene ID" value="TraesLDM5D03G03117500"/>
</dbReference>
<dbReference type="Gramene" id="TraesLDM6A03G03257400.1">
    <property type="protein sequence ID" value="TraesLDM6A03G03257400.1.CDS1"/>
    <property type="gene ID" value="TraesLDM6A03G03257400"/>
</dbReference>
<dbReference type="Gramene" id="TraesLDM6A03G03258730.1">
    <property type="protein sequence ID" value="TraesLDM6A03G03258730.1.CDS1"/>
    <property type="gene ID" value="TraesLDM6A03G03258730"/>
</dbReference>
<dbReference type="Gramene" id="TraesLDM6A03G03271610.1">
    <property type="protein sequence ID" value="TraesLDM6A03G03271610.1.CDS1"/>
    <property type="gene ID" value="TraesLDM6A03G03271610"/>
</dbReference>
<dbReference type="Gramene" id="TraesLDM6A03G03296170.1">
    <property type="protein sequence ID" value="TraesLDM6A03G03296170.1.CDS1"/>
    <property type="gene ID" value="TraesLDM6A03G03296170"/>
</dbReference>
<dbReference type="Gramene" id="TraesLDM6B03G03451140.1">
    <property type="protein sequence ID" value="TraesLDM6B03G03451140.1.CDS1"/>
    <property type="gene ID" value="TraesLDM6B03G03451140"/>
</dbReference>
<dbReference type="Gramene" id="TraesLDM6B03G03451140.2">
    <property type="protein sequence ID" value="TraesLDM6B03G03451140.2.CDS1"/>
    <property type="gene ID" value="TraesLDM6B03G03451140"/>
</dbReference>
<dbReference type="Gramene" id="TraesLDM6B03G03451380.1">
    <property type="protein sequence ID" value="TraesLDM6B03G03451380.1.CDS1"/>
    <property type="gene ID" value="TraesLDM6B03G03451380"/>
</dbReference>
<dbReference type="Gramene" id="TraesLDM6B03G03452340.1">
    <property type="protein sequence ID" value="TraesLDM6B03G03452340.1.CDS1"/>
    <property type="gene ID" value="TraesLDM6B03G03452340"/>
</dbReference>
<dbReference type="Gramene" id="TraesLDM6D03G03664130.1">
    <property type="protein sequence ID" value="TraesLDM6D03G03664130.1.CDS1"/>
    <property type="gene ID" value="TraesLDM6D03G03664130"/>
</dbReference>
<dbReference type="Gramene" id="TraesLDM6D03G03674320.1">
    <property type="protein sequence ID" value="TraesLDM6D03G03674320.1.CDS1"/>
    <property type="gene ID" value="TraesLDM6D03G03674320"/>
</dbReference>
<dbReference type="Gramene" id="TraesLDM6D03G03696820.1">
    <property type="protein sequence ID" value="TraesLDM6D03G03696820.1.CDS1"/>
    <property type="gene ID" value="TraesLDM6D03G03696820"/>
</dbReference>
<dbReference type="Gramene" id="TraesLDM7A03G03841280.1">
    <property type="protein sequence ID" value="TraesLDM7A03G03841280.1.CDS1"/>
    <property type="gene ID" value="TraesLDM7A03G03841280"/>
</dbReference>
<dbReference type="Gramene" id="TraesLDM7A03G03841560.1">
    <property type="protein sequence ID" value="TraesLDM7A03G03841560.1.CDS1"/>
    <property type="gene ID" value="TraesLDM7A03G03841560"/>
</dbReference>
<dbReference type="Gramene" id="TraesLDM7A03G03847720.1">
    <property type="protein sequence ID" value="TraesLDM7A03G03847720.1.CDS1"/>
    <property type="gene ID" value="TraesLDM7A03G03847720"/>
</dbReference>
<dbReference type="Gramene" id="TraesLDM7A03G03847930.1">
    <property type="protein sequence ID" value="TraesLDM7A03G03847930.1.CDS1"/>
    <property type="gene ID" value="TraesLDM7A03G03847930"/>
</dbReference>
<dbReference type="Gramene" id="TraesLDM7A03G03848000.1">
    <property type="protein sequence ID" value="TraesLDM7A03G03848000.1.CDS1"/>
    <property type="gene ID" value="TraesLDM7A03G03848000"/>
</dbReference>
<dbReference type="Gramene" id="TraesLDM7A03G03848040.1">
    <property type="protein sequence ID" value="TraesLDM7A03G03848040.1.CDS1"/>
    <property type="gene ID" value="TraesLDM7A03G03848040"/>
</dbReference>
<dbReference type="Gramene" id="TraesLDM7B03G04049410.1">
    <property type="protein sequence ID" value="TraesLDM7B03G04049410.1.CDS1"/>
    <property type="gene ID" value="TraesLDM7B03G04049410"/>
</dbReference>
<dbReference type="Gramene" id="TraesLDM7B03G04049800.1">
    <property type="protein sequence ID" value="TraesLDM7B03G04049800.1.CDS1"/>
    <property type="gene ID" value="TraesLDM7B03G04049800"/>
</dbReference>
<dbReference type="Gramene" id="TraesLDM7B03G04049870.1">
    <property type="protein sequence ID" value="TraesLDM7B03G04049870.1.CDS1"/>
    <property type="gene ID" value="TraesLDM7B03G04049870"/>
</dbReference>
<dbReference type="Gramene" id="TraesLDM7B03G04050190.1">
    <property type="protein sequence ID" value="TraesLDM7B03G04050190.1.CDS1"/>
    <property type="gene ID" value="TraesLDM7B03G04050190"/>
</dbReference>
<dbReference type="Gramene" id="TraesLDM7B03G04050320.1">
    <property type="protein sequence ID" value="TraesLDM7B03G04050320.1.CDS1"/>
    <property type="gene ID" value="TraesLDM7B03G04050320"/>
</dbReference>
<dbReference type="Gramene" id="TraesLDM7B03G04050340.1">
    <property type="protein sequence ID" value="TraesLDM7B03G04050340.1.CDS1"/>
    <property type="gene ID" value="TraesLDM7B03G04050340"/>
</dbReference>
<dbReference type="Gramene" id="TraesLDM7B03G04050440.1">
    <property type="protein sequence ID" value="TraesLDM7B03G04050440.1.CDS1"/>
    <property type="gene ID" value="TraesLDM7B03G04050440"/>
</dbReference>
<dbReference type="Gramene" id="TraesLDM7B03G04050950.1">
    <property type="protein sequence ID" value="TraesLDM7B03G04050950.1.CDS1"/>
    <property type="gene ID" value="TraesLDM7B03G04050950"/>
</dbReference>
<dbReference type="Gramene" id="TraesLDM7D03G04309670.1">
    <property type="protein sequence ID" value="TraesLDM7D03G04309670.1.CDS1"/>
    <property type="gene ID" value="TraesLDM7D03G04309670"/>
</dbReference>
<dbReference type="Gramene" id="TraesLDM7D03G04309720.1">
    <property type="protein sequence ID" value="TraesLDM7D03G04309720.1.CDS1"/>
    <property type="gene ID" value="TraesLDM7D03G04309720"/>
</dbReference>
<dbReference type="Gramene" id="TraesLDM7D03G04309830.1">
    <property type="protein sequence ID" value="TraesLDM7D03G04309830.1.CDS1"/>
    <property type="gene ID" value="TraesLDM7D03G04309830"/>
</dbReference>
<dbReference type="Gramene" id="TraesLDM7D03G04315670.1">
    <property type="protein sequence ID" value="TraesLDM7D03G04315670.1.CDS1"/>
    <property type="gene ID" value="TraesLDM7D03G04315670"/>
</dbReference>
<dbReference type="Gramene" id="TraesLDM7D03G04315980.1">
    <property type="protein sequence ID" value="TraesLDM7D03G04315980.1.CDS1"/>
    <property type="gene ID" value="TraesLDM7D03G04315980"/>
</dbReference>
<dbReference type="Gramene" id="TraesLDM7D03G04316010.1">
    <property type="protein sequence ID" value="TraesLDM7D03G04316010.1.CDS1"/>
    <property type="gene ID" value="TraesLDM7D03G04316010"/>
</dbReference>
<dbReference type="Gramene" id="TraesLDM7D03G04325000.1">
    <property type="protein sequence ID" value="TraesLDM7D03G04325000.1.CDS1"/>
    <property type="gene ID" value="TraesLDM7D03G04325000"/>
</dbReference>
<dbReference type="Gramene" id="TraesLDMUn03G04512900.1">
    <property type="protein sequence ID" value="TraesLDMUn03G04512900.1.CDS1"/>
    <property type="gene ID" value="TraesLDMUn03G04512900"/>
</dbReference>
<dbReference type="Gramene" id="TraesMAC1A03G00108520.1">
    <property type="protein sequence ID" value="TraesMAC1A03G00108520.1.CDS1"/>
    <property type="gene ID" value="TraesMAC1A03G00108520"/>
</dbReference>
<dbReference type="Gramene" id="TraesMAC1A03G00121390.1">
    <property type="protein sequence ID" value="TraesMAC1A03G00121390.1.CDS1"/>
    <property type="gene ID" value="TraesMAC1A03G00121390"/>
</dbReference>
<dbReference type="Gramene" id="TraesMAC1A03G00125300.1">
    <property type="protein sequence ID" value="TraesMAC1A03G00125300.1.CDS1"/>
    <property type="gene ID" value="TraesMAC1A03G00125300"/>
</dbReference>
<dbReference type="Gramene" id="TraesMAC1A03G00154130.1">
    <property type="protein sequence ID" value="TraesMAC1A03G00154130.1.CDS1"/>
    <property type="gene ID" value="TraesMAC1A03G00154130"/>
</dbReference>
<dbReference type="Gramene" id="TraesMAC1A03G00154250.1">
    <property type="protein sequence ID" value="TraesMAC1A03G00154250.1.CDS1"/>
    <property type="gene ID" value="TraesMAC1A03G00154250"/>
</dbReference>
<dbReference type="Gramene" id="TraesMAC1A03G00154660.1">
    <property type="protein sequence ID" value="TraesMAC1A03G00154660.1.CDS1"/>
    <property type="gene ID" value="TraesMAC1A03G00154660"/>
</dbReference>
<dbReference type="Gramene" id="TraesMAC1B03G00310490.1">
    <property type="protein sequence ID" value="TraesMAC1B03G00310490.1.CDS1"/>
    <property type="gene ID" value="TraesMAC1B03G00310490"/>
</dbReference>
<dbReference type="Gramene" id="TraesMAC1B03G00310520.1">
    <property type="protein sequence ID" value="TraesMAC1B03G00310520.1.CDS1"/>
    <property type="gene ID" value="TraesMAC1B03G00310520"/>
</dbReference>
<dbReference type="Gramene" id="TraesMAC1B03G00326710.1">
    <property type="protein sequence ID" value="TraesMAC1B03G00326710.1.CDS1"/>
    <property type="gene ID" value="TraesMAC1B03G00326710"/>
</dbReference>
<dbReference type="Gramene" id="TraesMAC1B03G00366060.1">
    <property type="protein sequence ID" value="TraesMAC1B03G00366060.1.CDS1"/>
    <property type="gene ID" value="TraesMAC1B03G00366060"/>
</dbReference>
<dbReference type="Gramene" id="TraesMAC1B03G00366550.1">
    <property type="protein sequence ID" value="TraesMAC1B03G00366550.1.CDS1"/>
    <property type="gene ID" value="TraesMAC1B03G00366550"/>
</dbReference>
<dbReference type="Gramene" id="TraesMAC1B03G00367190.1">
    <property type="protein sequence ID" value="TraesMAC1B03G00367190.1.CDS1"/>
    <property type="gene ID" value="TraesMAC1B03G00367190"/>
</dbReference>
<dbReference type="Gramene" id="TraesMAC1B03G00367330.1">
    <property type="protein sequence ID" value="TraesMAC1B03G00367330.1.CDS1"/>
    <property type="gene ID" value="TraesMAC1B03G00367330"/>
</dbReference>
<dbReference type="Gramene" id="TraesMAC1B03G00367370.1">
    <property type="protein sequence ID" value="TraesMAC1B03G00367370.1.CDS1"/>
    <property type="gene ID" value="TraesMAC1B03G00367370"/>
</dbReference>
<dbReference type="Gramene" id="TraesMAC1B03G00367370.2">
    <property type="protein sequence ID" value="TraesMAC1B03G00367370.2.CDS1"/>
    <property type="gene ID" value="TraesMAC1B03G00367370"/>
</dbReference>
<dbReference type="Gramene" id="TraesMAC1D03G00501960.1">
    <property type="protein sequence ID" value="TraesMAC1D03G00501960.1.CDS1"/>
    <property type="gene ID" value="TraesMAC1D03G00501960"/>
</dbReference>
<dbReference type="Gramene" id="TraesMAC1D03G00512000.1">
    <property type="protein sequence ID" value="TraesMAC1D03G00512000.1.CDS1"/>
    <property type="gene ID" value="TraesMAC1D03G00512000"/>
</dbReference>
<dbReference type="Gramene" id="TraesMAC1D03G00516820.1">
    <property type="protein sequence ID" value="TraesMAC1D03G00516820.1.CDS1"/>
    <property type="gene ID" value="TraesMAC1D03G00516820"/>
</dbReference>
<dbReference type="Gramene" id="TraesMAC1D03G00548090.1">
    <property type="protein sequence ID" value="TraesMAC1D03G00548090.1.CDS1"/>
    <property type="gene ID" value="TraesMAC1D03G00548090"/>
</dbReference>
<dbReference type="Gramene" id="TraesMAC1D03G00548090.2">
    <property type="protein sequence ID" value="TraesMAC1D03G00548090.2.CDS1"/>
    <property type="gene ID" value="TraesMAC1D03G00548090"/>
</dbReference>
<dbReference type="Gramene" id="TraesMAC1D03G00548170.1">
    <property type="protein sequence ID" value="TraesMAC1D03G00548170.1.CDS1"/>
    <property type="gene ID" value="TraesMAC1D03G00548170"/>
</dbReference>
<dbReference type="Gramene" id="TraesMAC1D03G00548660.1">
    <property type="protein sequence ID" value="TraesMAC1D03G00548660.1.CDS1"/>
    <property type="gene ID" value="TraesMAC1D03G00548660"/>
</dbReference>
<dbReference type="Gramene" id="TraesMAC1D03G00548760.1">
    <property type="protein sequence ID" value="TraesMAC1D03G00548760.1.CDS1"/>
    <property type="gene ID" value="TraesMAC1D03G00548760"/>
</dbReference>
<dbReference type="Gramene" id="TraesMAC2A03G00745640.1">
    <property type="protein sequence ID" value="TraesMAC2A03G00745640.1.CDS1"/>
    <property type="gene ID" value="TraesMAC2A03G00745640"/>
</dbReference>
<dbReference type="Gramene" id="TraesMAC2B03G00958100.1">
    <property type="protein sequence ID" value="TraesMAC2B03G00958100.1"/>
    <property type="gene ID" value="TraesMAC2B03G00958100"/>
</dbReference>
<dbReference type="Gramene" id="TraesMAC2D03G01200260.1">
    <property type="protein sequence ID" value="TraesMAC2D03G01200260.1.CDS1"/>
    <property type="gene ID" value="TraesMAC2D03G01200260"/>
</dbReference>
<dbReference type="Gramene" id="TraesMAC3A03G01354580.1">
    <property type="protein sequence ID" value="TraesMAC3A03G01354580.1.CDS1"/>
    <property type="gene ID" value="TraesMAC3A03G01354580"/>
</dbReference>
<dbReference type="Gramene" id="TraesMAC3A03G01466760.1">
    <property type="protein sequence ID" value="TraesMAC3A03G01466760.1.CDS1"/>
    <property type="gene ID" value="TraesMAC3A03G01466760"/>
</dbReference>
<dbReference type="Gramene" id="TraesMAC3B03G01599030.1">
    <property type="protein sequence ID" value="TraesMAC3B03G01599030.1.CDS1"/>
    <property type="gene ID" value="TraesMAC3B03G01599030"/>
</dbReference>
<dbReference type="Gramene" id="TraesMAC3B03G01671590.1">
    <property type="protein sequence ID" value="TraesMAC3B03G01671590.1.CDS1"/>
    <property type="gene ID" value="TraesMAC3B03G01671590"/>
</dbReference>
<dbReference type="Gramene" id="TraesMAC3D03G01844090.1">
    <property type="protein sequence ID" value="TraesMAC3D03G01844090.1.CDS1"/>
    <property type="gene ID" value="TraesMAC3D03G01844090"/>
</dbReference>
<dbReference type="Gramene" id="TraesMAC3D03G01942040.1">
    <property type="protein sequence ID" value="TraesMAC3D03G01942040.1.CDS1"/>
    <property type="gene ID" value="TraesMAC3D03G01942040"/>
</dbReference>
<dbReference type="Gramene" id="TraesMAC4A03G02013100.1">
    <property type="protein sequence ID" value="TraesMAC4A03G02013100.1.CDS1"/>
    <property type="gene ID" value="TraesMAC4A03G02013100"/>
</dbReference>
<dbReference type="Gramene" id="TraesMAC4A03G02022370.1">
    <property type="protein sequence ID" value="TraesMAC4A03G02022370.1.CDS1"/>
    <property type="gene ID" value="TraesMAC4A03G02022370"/>
</dbReference>
<dbReference type="Gramene" id="TraesMAC4A03G02175810.1">
    <property type="protein sequence ID" value="TraesMAC4A03G02175810.1.CDS1"/>
    <property type="gene ID" value="TraesMAC4A03G02175810"/>
</dbReference>
<dbReference type="Gramene" id="TraesMAC4B03G02365840.1">
    <property type="protein sequence ID" value="TraesMAC4B03G02365840.1.CDS1"/>
    <property type="gene ID" value="TraesMAC4B03G02365840"/>
</dbReference>
<dbReference type="Gramene" id="TraesMAC4D03G02523410.1">
    <property type="protein sequence ID" value="TraesMAC4D03G02523410.1.CDS1"/>
    <property type="gene ID" value="TraesMAC4D03G02523410"/>
</dbReference>
<dbReference type="Gramene" id="TraesMAC4D03G02533280.1">
    <property type="protein sequence ID" value="TraesMAC4D03G02533280.1.CDS1"/>
    <property type="gene ID" value="TraesMAC4D03G02533280"/>
</dbReference>
<dbReference type="Gramene" id="TraesMAC5B03G02883090.1">
    <property type="protein sequence ID" value="TraesMAC5B03G02883090.1.CDS1"/>
    <property type="gene ID" value="TraesMAC5B03G02883090"/>
</dbReference>
<dbReference type="Gramene" id="TraesMAC5D03G03111580.1">
    <property type="protein sequence ID" value="TraesMAC5D03G03111580.1.CDS1"/>
    <property type="gene ID" value="TraesMAC5D03G03111580"/>
</dbReference>
<dbReference type="Gramene" id="TraesMAC6A03G03253100.1">
    <property type="protein sequence ID" value="TraesMAC6A03G03253100.1.CDS1"/>
    <property type="gene ID" value="TraesMAC6A03G03253100"/>
</dbReference>
<dbReference type="Gramene" id="TraesMAC6A03G03253620.1">
    <property type="protein sequence ID" value="TraesMAC6A03G03253620.1.CDS1"/>
    <property type="gene ID" value="TraesMAC6A03G03253620"/>
</dbReference>
<dbReference type="Gramene" id="TraesMAC6A03G03267720.1">
    <property type="protein sequence ID" value="TraesMAC6A03G03267720.1.CDS1"/>
    <property type="gene ID" value="TraesMAC6A03G03267720"/>
</dbReference>
<dbReference type="Gramene" id="TraesMAC6A03G03292240.1">
    <property type="protein sequence ID" value="TraesMAC6A03G03292240.1.CDS1"/>
    <property type="gene ID" value="TraesMAC6A03G03292240"/>
</dbReference>
<dbReference type="Gramene" id="TraesMAC6B03G03445880.1">
    <property type="protein sequence ID" value="TraesMAC6B03G03445880.1.CDS1"/>
    <property type="gene ID" value="TraesMAC6B03G03445880"/>
</dbReference>
<dbReference type="Gramene" id="TraesMAC6B03G03445880.2">
    <property type="protein sequence ID" value="TraesMAC6B03G03445880.2.CDS1"/>
    <property type="gene ID" value="TraesMAC6B03G03445880"/>
</dbReference>
<dbReference type="Gramene" id="TraesMAC6B03G03446160.1">
    <property type="protein sequence ID" value="TraesMAC6B03G03446160.1.CDS1"/>
    <property type="gene ID" value="TraesMAC6B03G03446160"/>
</dbReference>
<dbReference type="Gramene" id="TraesMAC6B03G03447130.1">
    <property type="protein sequence ID" value="TraesMAC6B03G03447130.1.CDS1"/>
    <property type="gene ID" value="TraesMAC6B03G03447130"/>
</dbReference>
<dbReference type="Gramene" id="TraesMAC6D03G03660050.1">
    <property type="protein sequence ID" value="TraesMAC6D03G03660050.1.CDS1"/>
    <property type="gene ID" value="TraesMAC6D03G03660050"/>
</dbReference>
<dbReference type="Gramene" id="TraesMAC6D03G03660490.1">
    <property type="protein sequence ID" value="TraesMAC6D03G03660490.1.CDS1"/>
    <property type="gene ID" value="TraesMAC6D03G03660490"/>
</dbReference>
<dbReference type="Gramene" id="TraesMAC6D03G03669130.1">
    <property type="protein sequence ID" value="TraesMAC6D03G03669130.1.CDS1"/>
    <property type="gene ID" value="TraesMAC6D03G03669130"/>
</dbReference>
<dbReference type="Gramene" id="TraesMAC6D03G03691660.1">
    <property type="protein sequence ID" value="TraesMAC6D03G03691660.1.CDS1"/>
    <property type="gene ID" value="TraesMAC6D03G03691660"/>
</dbReference>
<dbReference type="Gramene" id="TraesMAC7A03G03835660.1">
    <property type="protein sequence ID" value="TraesMAC7A03G03835660.1.CDS1"/>
    <property type="gene ID" value="TraesMAC7A03G03835660"/>
</dbReference>
<dbReference type="Gramene" id="TraesMAC7A03G03835950.1">
    <property type="protein sequence ID" value="TraesMAC7A03G03835950.1.CDS1"/>
    <property type="gene ID" value="TraesMAC7A03G03835950"/>
</dbReference>
<dbReference type="Gramene" id="TraesMAC7A03G03842340.1">
    <property type="protein sequence ID" value="TraesMAC7A03G03842340.1.CDS1"/>
    <property type="gene ID" value="TraesMAC7A03G03842340"/>
</dbReference>
<dbReference type="Gramene" id="TraesMAC7A03G03842570.1">
    <property type="protein sequence ID" value="TraesMAC7A03G03842570.1.CDS1"/>
    <property type="gene ID" value="TraesMAC7A03G03842570"/>
</dbReference>
<dbReference type="Gramene" id="TraesMAC7A03G03842630.1">
    <property type="protein sequence ID" value="TraesMAC7A03G03842630.1.CDS1"/>
    <property type="gene ID" value="TraesMAC7A03G03842630"/>
</dbReference>
<dbReference type="Gramene" id="TraesMAC7A03G03842990.1">
    <property type="protein sequence ID" value="TraesMAC7A03G03842990.1.CDS1"/>
    <property type="gene ID" value="TraesMAC7A03G03842990"/>
</dbReference>
<dbReference type="Gramene" id="TraesMAC7B03G04042060.1">
    <property type="protein sequence ID" value="TraesMAC7B03G04042060.1.CDS1"/>
    <property type="gene ID" value="TraesMAC7B03G04042060"/>
</dbReference>
<dbReference type="Gramene" id="TraesMAC7B03G04042440.1">
    <property type="protein sequence ID" value="TraesMAC7B03G04042440.1.CDS1"/>
    <property type="gene ID" value="TraesMAC7B03G04042440"/>
</dbReference>
<dbReference type="Gramene" id="TraesMAC7B03G04042530.1">
    <property type="protein sequence ID" value="TraesMAC7B03G04042530.1.CDS1"/>
    <property type="gene ID" value="TraesMAC7B03G04042530"/>
</dbReference>
<dbReference type="Gramene" id="TraesMAC7B03G04042570.1">
    <property type="protein sequence ID" value="TraesMAC7B03G04042570.1.CDS1"/>
    <property type="gene ID" value="TraesMAC7B03G04042570"/>
</dbReference>
<dbReference type="Gramene" id="TraesMAC7B03G04042650.1">
    <property type="protein sequence ID" value="TraesMAC7B03G04042650.1.CDS1"/>
    <property type="gene ID" value="TraesMAC7B03G04042650"/>
</dbReference>
<dbReference type="Gramene" id="TraesMAC7B03G04043360.1">
    <property type="protein sequence ID" value="TraesMAC7B03G04043360.1.CDS1"/>
    <property type="gene ID" value="TraesMAC7B03G04043360"/>
</dbReference>
<dbReference type="Gramene" id="TraesMAC7B03G04054000.1">
    <property type="protein sequence ID" value="TraesMAC7B03G04054000.1.CDS1"/>
    <property type="gene ID" value="TraesMAC7B03G04054000"/>
</dbReference>
<dbReference type="Gramene" id="TraesMAC7D03G04295940.1">
    <property type="protein sequence ID" value="TraesMAC7D03G04295940.1.CDS1"/>
    <property type="gene ID" value="TraesMAC7D03G04295940"/>
</dbReference>
<dbReference type="Gramene" id="TraesMAC7D03G04296060.1">
    <property type="protein sequence ID" value="TraesMAC7D03G04296060.1.CDS1"/>
    <property type="gene ID" value="TraesMAC7D03G04296060"/>
</dbReference>
<dbReference type="Gramene" id="TraesMAC7D03G04301900.1">
    <property type="protein sequence ID" value="TraesMAC7D03G04301900.1.CDS1"/>
    <property type="gene ID" value="TraesMAC7D03G04301900"/>
</dbReference>
<dbReference type="Gramene" id="TraesMAC7D03G04302210.1">
    <property type="protein sequence ID" value="TraesMAC7D03G04302210.1.CDS1"/>
    <property type="gene ID" value="TraesMAC7D03G04302210"/>
</dbReference>
<dbReference type="Gramene" id="TraesMAC7D03G04302260.1">
    <property type="protein sequence ID" value="TraesMAC7D03G04302260.1.CDS1"/>
    <property type="gene ID" value="TraesMAC7D03G04302260"/>
</dbReference>
<dbReference type="Gramene" id="TraesMAC7D03G04311280.1">
    <property type="protein sequence ID" value="TraesMAC7D03G04311280.1.CDS1"/>
    <property type="gene ID" value="TraesMAC7D03G04311280"/>
</dbReference>
<dbReference type="Gramene" id="TraesNOR1A03G00107990.1">
    <property type="protein sequence ID" value="TraesNOR1A03G00107990.1.CDS1"/>
    <property type="gene ID" value="TraesNOR1A03G00107990"/>
</dbReference>
<dbReference type="Gramene" id="TraesNOR1A03G00120870.1">
    <property type="protein sequence ID" value="TraesNOR1A03G00120870.1.CDS1"/>
    <property type="gene ID" value="TraesNOR1A03G00120870"/>
</dbReference>
<dbReference type="Gramene" id="TraesNOR1A03G00124590.1">
    <property type="protein sequence ID" value="TraesNOR1A03G00124590.1.CDS1"/>
    <property type="gene ID" value="TraesNOR1A03G00124590"/>
</dbReference>
<dbReference type="Gramene" id="TraesNOR1A03G00153890.1">
    <property type="protein sequence ID" value="TraesNOR1A03G00153890.1.CDS1"/>
    <property type="gene ID" value="TraesNOR1A03G00153890"/>
</dbReference>
<dbReference type="Gramene" id="TraesNOR1A03G00154000.1">
    <property type="protein sequence ID" value="TraesNOR1A03G00154000.1.CDS1"/>
    <property type="gene ID" value="TraesNOR1A03G00154000"/>
</dbReference>
<dbReference type="Gramene" id="TraesNOR1A03G00154410.1">
    <property type="protein sequence ID" value="TraesNOR1A03G00154410.1.CDS1"/>
    <property type="gene ID" value="TraesNOR1A03G00154410"/>
</dbReference>
<dbReference type="Gramene" id="TraesNOR1B03G00312650.1">
    <property type="protein sequence ID" value="TraesNOR1B03G00312650.1.CDS1"/>
    <property type="gene ID" value="TraesNOR1B03G00312650"/>
</dbReference>
<dbReference type="Gramene" id="TraesNOR1B03G00312690.1">
    <property type="protein sequence ID" value="TraesNOR1B03G00312690.1.CDS1"/>
    <property type="gene ID" value="TraesNOR1B03G00312690"/>
</dbReference>
<dbReference type="Gramene" id="TraesNOR1B03G00329020.1">
    <property type="protein sequence ID" value="TraesNOR1B03G00329020.1.CDS1"/>
    <property type="gene ID" value="TraesNOR1B03G00329020"/>
</dbReference>
<dbReference type="Gramene" id="TraesNOR1B03G00368960.1">
    <property type="protein sequence ID" value="TraesNOR1B03G00368960.1.CDS1"/>
    <property type="gene ID" value="TraesNOR1B03G00368960"/>
</dbReference>
<dbReference type="Gramene" id="TraesNOR1B03G00369470.1">
    <property type="protein sequence ID" value="TraesNOR1B03G00369470.1.CDS1"/>
    <property type="gene ID" value="TraesNOR1B03G00369470"/>
</dbReference>
<dbReference type="Gramene" id="TraesNOR1B03G00370150.1">
    <property type="protein sequence ID" value="TraesNOR1B03G00370150.1.CDS1"/>
    <property type="gene ID" value="TraesNOR1B03G00370150"/>
</dbReference>
<dbReference type="Gramene" id="TraesNOR1B03G00370280.1">
    <property type="protein sequence ID" value="TraesNOR1B03G00370280.1.CDS1"/>
    <property type="gene ID" value="TraesNOR1B03G00370280"/>
</dbReference>
<dbReference type="Gramene" id="TraesNOR1B03G00370340.1">
    <property type="protein sequence ID" value="TraesNOR1B03G00370340.1.CDS1"/>
    <property type="gene ID" value="TraesNOR1B03G00370340"/>
</dbReference>
<dbReference type="Gramene" id="TraesNOR1D03G00510610.1">
    <property type="protein sequence ID" value="TraesNOR1D03G00510610.1.CDS1"/>
    <property type="gene ID" value="TraesNOR1D03G00510610"/>
</dbReference>
<dbReference type="Gramene" id="TraesNOR1D03G00510650.1">
    <property type="protein sequence ID" value="TraesNOR1D03G00510650.1.CDS1"/>
    <property type="gene ID" value="TraesNOR1D03G00510650"/>
</dbReference>
<dbReference type="Gramene" id="TraesNOR1D03G00520850.1">
    <property type="protein sequence ID" value="TraesNOR1D03G00520850.1.CDS1"/>
    <property type="gene ID" value="TraesNOR1D03G00520850"/>
</dbReference>
<dbReference type="Gramene" id="TraesNOR1D03G00525590.1">
    <property type="protein sequence ID" value="TraesNOR1D03G00525590.1.CDS1"/>
    <property type="gene ID" value="TraesNOR1D03G00525590"/>
</dbReference>
<dbReference type="Gramene" id="TraesNOR1D03G00556710.1">
    <property type="protein sequence ID" value="TraesNOR1D03G00556710.1.CDS1"/>
    <property type="gene ID" value="TraesNOR1D03G00556710"/>
</dbReference>
<dbReference type="Gramene" id="TraesNOR1D03G00556800.1">
    <property type="protein sequence ID" value="TraesNOR1D03G00556800.1.CDS1"/>
    <property type="gene ID" value="TraesNOR1D03G00556800"/>
</dbReference>
<dbReference type="Gramene" id="TraesNOR1D03G00557310.1">
    <property type="protein sequence ID" value="TraesNOR1D03G00557310.1.CDS1"/>
    <property type="gene ID" value="TraesNOR1D03G00557310"/>
</dbReference>
<dbReference type="Gramene" id="TraesNOR1D03G00557390.1">
    <property type="protein sequence ID" value="TraesNOR1D03G00557390.1.CDS1"/>
    <property type="gene ID" value="TraesNOR1D03G00557390"/>
</dbReference>
<dbReference type="Gramene" id="TraesNOR2A03G00756630.1">
    <property type="protein sequence ID" value="TraesNOR2A03G00756630.1.CDS1"/>
    <property type="gene ID" value="TraesNOR2A03G00756630"/>
</dbReference>
<dbReference type="Gramene" id="TraesNOR2B03G00973950.1">
    <property type="protein sequence ID" value="TraesNOR2B03G00973950.1.CDS1"/>
    <property type="gene ID" value="TraesNOR2B03G00973950"/>
</dbReference>
<dbReference type="Gramene" id="TraesNOR2D03G01218590.1">
    <property type="protein sequence ID" value="TraesNOR2D03G01218590.1.CDS1"/>
    <property type="gene ID" value="TraesNOR2D03G01218590"/>
</dbReference>
<dbReference type="Gramene" id="TraesNOR3A03G01376410.1">
    <property type="protein sequence ID" value="TraesNOR3A03G01376410.1.CDS1"/>
    <property type="gene ID" value="TraesNOR3A03G01376410"/>
</dbReference>
<dbReference type="Gramene" id="TraesNOR3B03G01694420.1">
    <property type="protein sequence ID" value="TraesNOR3B03G01694420.1.CDS1"/>
    <property type="gene ID" value="TraesNOR3B03G01694420"/>
</dbReference>
<dbReference type="Gramene" id="TraesNOR3D03G01872710.1">
    <property type="protein sequence ID" value="TraesNOR3D03G01872710.1.CDS1"/>
    <property type="gene ID" value="TraesNOR3D03G01872710"/>
</dbReference>
<dbReference type="Gramene" id="TraesNOR3D03G01969650.1">
    <property type="protein sequence ID" value="TraesNOR3D03G01969650.1.CDS1"/>
    <property type="gene ID" value="TraesNOR3D03G01969650"/>
</dbReference>
<dbReference type="Gramene" id="TraesNOR4A03G02040570.1">
    <property type="protein sequence ID" value="TraesNOR4A03G02040570.1.CDS1"/>
    <property type="gene ID" value="TraesNOR4A03G02040570"/>
</dbReference>
<dbReference type="Gramene" id="TraesNOR4A03G02049690.1">
    <property type="protein sequence ID" value="TraesNOR4A03G02049690.1.CDS1"/>
    <property type="gene ID" value="TraesNOR4A03G02049690"/>
</dbReference>
<dbReference type="Gramene" id="TraesNOR4A03G02199110.1">
    <property type="protein sequence ID" value="TraesNOR4A03G02199110.1.CDS1"/>
    <property type="gene ID" value="TraesNOR4A03G02199110"/>
</dbReference>
<dbReference type="Gramene" id="TraesNOR4A03G02199150.1">
    <property type="protein sequence ID" value="TraesNOR4A03G02199150.1.CDS1"/>
    <property type="gene ID" value="TraesNOR4A03G02199150"/>
</dbReference>
<dbReference type="Gramene" id="TraesNOR4B03G02383860.1">
    <property type="protein sequence ID" value="TraesNOR4B03G02383860.1.CDS1"/>
    <property type="gene ID" value="TraesNOR4B03G02383860"/>
</dbReference>
<dbReference type="Gramene" id="TraesNOR4D03G02542620.1">
    <property type="protein sequence ID" value="TraesNOR4D03G02542620.1.CDS1"/>
    <property type="gene ID" value="TraesNOR4D03G02542620"/>
</dbReference>
<dbReference type="Gramene" id="TraesNOR4D03G02552540.1">
    <property type="protein sequence ID" value="TraesNOR4D03G02552540.1.CDS1"/>
    <property type="gene ID" value="TraesNOR4D03G02552540"/>
</dbReference>
<dbReference type="Gramene" id="TraesNOR5B03G02910470.1">
    <property type="protein sequence ID" value="TraesNOR5B03G02910470.1.CDS1"/>
    <property type="gene ID" value="TraesNOR5B03G02910470"/>
</dbReference>
<dbReference type="Gramene" id="TraesNOR5B03G02910470.2">
    <property type="protein sequence ID" value="TraesNOR5B03G02910470.2.CDS1"/>
    <property type="gene ID" value="TraesNOR5B03G02910470"/>
</dbReference>
<dbReference type="Gramene" id="TraesNOR5D03G03142490.1">
    <property type="protein sequence ID" value="TraesNOR5D03G03142490.1.CDS1"/>
    <property type="gene ID" value="TraesNOR5D03G03142490"/>
</dbReference>
<dbReference type="Gramene" id="TraesNOR5D03G03142490.2">
    <property type="protein sequence ID" value="TraesNOR5D03G03142490.2.CDS1"/>
    <property type="gene ID" value="TraesNOR5D03G03142490"/>
</dbReference>
<dbReference type="Gramene" id="TraesNOR6A03G03284540.1">
    <property type="protein sequence ID" value="TraesNOR6A03G03284540.1.CDS1"/>
    <property type="gene ID" value="TraesNOR6A03G03284540"/>
</dbReference>
<dbReference type="Gramene" id="TraesNOR6A03G03284970.1">
    <property type="protein sequence ID" value="TraesNOR6A03G03284970.1.CDS1"/>
    <property type="gene ID" value="TraesNOR6A03G03284970"/>
</dbReference>
<dbReference type="Gramene" id="TraesNOR6A03G03299440.1">
    <property type="protein sequence ID" value="TraesNOR6A03G03299440.1.CDS1"/>
    <property type="gene ID" value="TraesNOR6A03G03299440"/>
</dbReference>
<dbReference type="Gramene" id="TraesNOR6A03G03324410.1">
    <property type="protein sequence ID" value="TraesNOR6A03G03324410.1.CDS1"/>
    <property type="gene ID" value="TraesNOR6A03G03324410"/>
</dbReference>
<dbReference type="Gramene" id="TraesNOR6B03G03480040.1">
    <property type="protein sequence ID" value="TraesNOR6B03G03480040.1.CDS1"/>
    <property type="gene ID" value="TraesNOR6B03G03480040"/>
</dbReference>
<dbReference type="Gramene" id="TraesNOR6B03G03480260.1">
    <property type="protein sequence ID" value="TraesNOR6B03G03480260.1.CDS1"/>
    <property type="gene ID" value="TraesNOR6B03G03480260"/>
</dbReference>
<dbReference type="Gramene" id="TraesNOR6B03G03481300.1">
    <property type="protein sequence ID" value="TraesNOR6B03G03481300.1.CDS1"/>
    <property type="gene ID" value="TraesNOR6B03G03481300"/>
</dbReference>
<dbReference type="Gramene" id="TraesNOR6D03G03710950.1">
    <property type="protein sequence ID" value="TraesNOR6D03G03710950.1.CDS1"/>
    <property type="gene ID" value="TraesNOR6D03G03710950"/>
</dbReference>
<dbReference type="Gramene" id="TraesNOR6D03G03733620.1">
    <property type="protein sequence ID" value="TraesNOR6D03G03733620.1.CDS1"/>
    <property type="gene ID" value="TraesNOR6D03G03733620"/>
</dbReference>
<dbReference type="Gramene" id="TraesNOR7A03G03877540.1">
    <property type="protein sequence ID" value="TraesNOR7A03G03877540.1.CDS1"/>
    <property type="gene ID" value="TraesNOR7A03G03877540"/>
</dbReference>
<dbReference type="Gramene" id="TraesNOR7A03G03877850.1">
    <property type="protein sequence ID" value="TraesNOR7A03G03877850.1.CDS1"/>
    <property type="gene ID" value="TraesNOR7A03G03877850"/>
</dbReference>
<dbReference type="Gramene" id="TraesNOR7A03G03884080.1">
    <property type="protein sequence ID" value="TraesNOR7A03G03884080.1.CDS1"/>
    <property type="gene ID" value="TraesNOR7A03G03884080"/>
</dbReference>
<dbReference type="Gramene" id="TraesNOR7A03G03884280.1">
    <property type="protein sequence ID" value="TraesNOR7A03G03884280.1.CDS1"/>
    <property type="gene ID" value="TraesNOR7A03G03884280"/>
</dbReference>
<dbReference type="Gramene" id="TraesNOR7A03G03884340.1">
    <property type="protein sequence ID" value="TraesNOR7A03G03884340.1.CDS1"/>
    <property type="gene ID" value="TraesNOR7A03G03884340"/>
</dbReference>
<dbReference type="Gramene" id="TraesNOR7A03G03884390.1">
    <property type="protein sequence ID" value="TraesNOR7A03G03884390.1.CDS1"/>
    <property type="gene ID" value="TraesNOR7A03G03884390"/>
</dbReference>
<dbReference type="Gramene" id="TraesNOR7B03G04090560.1">
    <property type="protein sequence ID" value="TraesNOR7B03G04090560.1.CDS1"/>
    <property type="gene ID" value="TraesNOR7B03G04090560"/>
</dbReference>
<dbReference type="Gramene" id="TraesNOR7B03G04090970.1">
    <property type="protein sequence ID" value="TraesNOR7B03G04090970.1.CDS1"/>
    <property type="gene ID" value="TraesNOR7B03G04090970"/>
</dbReference>
<dbReference type="Gramene" id="TraesNOR7B03G04091030.1">
    <property type="protein sequence ID" value="TraesNOR7B03G04091030.1.CDS1"/>
    <property type="gene ID" value="TraesNOR7B03G04091030"/>
</dbReference>
<dbReference type="Gramene" id="TraesNOR7B03G04091350.1">
    <property type="protein sequence ID" value="TraesNOR7B03G04091350.1.CDS1"/>
    <property type="gene ID" value="TraesNOR7B03G04091350"/>
</dbReference>
<dbReference type="Gramene" id="TraesNOR7B03G04091530.1">
    <property type="protein sequence ID" value="TraesNOR7B03G04091530.1.CDS1"/>
    <property type="gene ID" value="TraesNOR7B03G04091530"/>
</dbReference>
<dbReference type="Gramene" id="TraesNOR7B03G04091620.1">
    <property type="protein sequence ID" value="TraesNOR7B03G04091620.1.CDS1"/>
    <property type="gene ID" value="TraesNOR7B03G04091620"/>
</dbReference>
<dbReference type="Gramene" id="TraesNOR7B03G04092340.1">
    <property type="protein sequence ID" value="TraesNOR7B03G04092340.1.CDS1"/>
    <property type="gene ID" value="TraesNOR7B03G04092340"/>
</dbReference>
<dbReference type="Gramene" id="TraesNOR7B03G04103450.1">
    <property type="protein sequence ID" value="TraesNOR7B03G04103450.1.CDS1"/>
    <property type="gene ID" value="TraesNOR7B03G04103450"/>
</dbReference>
<dbReference type="Gramene" id="TraesNOR7D03G04352110.1">
    <property type="protein sequence ID" value="TraesNOR7D03G04352110.1.CDS1"/>
    <property type="gene ID" value="TraesNOR7D03G04352110"/>
</dbReference>
<dbReference type="Gramene" id="TraesNOR7D03G04352230.1">
    <property type="protein sequence ID" value="TraesNOR7D03G04352230.1.CDS1"/>
    <property type="gene ID" value="TraesNOR7D03G04352230"/>
</dbReference>
<dbReference type="Gramene" id="TraesNOR7D03G04358110.1">
    <property type="protein sequence ID" value="TraesNOR7D03G04358110.1.CDS1"/>
    <property type="gene ID" value="TraesNOR7D03G04358110"/>
</dbReference>
<dbReference type="Gramene" id="TraesNOR7D03G04358400.1">
    <property type="protein sequence ID" value="TraesNOR7D03G04358400.1.CDS1"/>
    <property type="gene ID" value="TraesNOR7D03G04358400"/>
</dbReference>
<dbReference type="Gramene" id="TraesNOR7D03G04358430.1">
    <property type="protein sequence ID" value="TraesNOR7D03G04358430.1.CDS1"/>
    <property type="gene ID" value="TraesNOR7D03G04358430"/>
</dbReference>
<dbReference type="Gramene" id="TraesNOR7D03G04367640.1">
    <property type="protein sequence ID" value="TraesNOR7D03G04367640.1.CDS1"/>
    <property type="gene ID" value="TraesNOR7D03G04367640"/>
</dbReference>
<dbReference type="Gramene" id="TraesNORUn03G04600280.1">
    <property type="protein sequence ID" value="TraesNORUn03G04600280.1.CDS1"/>
    <property type="gene ID" value="TraesNORUn03G04600280"/>
</dbReference>
<dbReference type="Gramene" id="TraesNORUn03G04623530.1">
    <property type="protein sequence ID" value="TraesNORUn03G04623530.1.CDS1"/>
    <property type="gene ID" value="TraesNORUn03G04623530"/>
</dbReference>
<dbReference type="Gramene" id="TraesNORUn03G04711210.1">
    <property type="protein sequence ID" value="TraesNORUn03G04711210.1.CDS1"/>
    <property type="gene ID" value="TraesNORUn03G04711210"/>
</dbReference>
<dbReference type="Gramene" id="TraesNORUn03G04758700.1">
    <property type="protein sequence ID" value="TraesNORUn03G04758700.1.CDS1"/>
    <property type="gene ID" value="TraesNORUn03G04758700"/>
</dbReference>
<dbReference type="Gramene" id="TraesPARA_EIv1.0_0019230.1">
    <property type="protein sequence ID" value="TraesPARA_EIv1.0_0019230.1.CDS1"/>
    <property type="gene ID" value="TraesPARA_EIv1.0_0019230"/>
</dbReference>
<dbReference type="Gramene" id="TraesPARA_EIv1.0_0019430.1">
    <property type="protein sequence ID" value="TraesPARA_EIv1.0_0019430.1.CDS1"/>
    <property type="gene ID" value="TraesPARA_EIv1.0_0019430"/>
</dbReference>
<dbReference type="Gramene" id="TraesPARA_EIv1.0_0019510.1">
    <property type="protein sequence ID" value="TraesPARA_EIv1.0_0019510.1.CDS1"/>
    <property type="gene ID" value="TraesPARA_EIv1.0_0019510"/>
</dbReference>
<dbReference type="Gramene" id="TraesPARA_EIv1.0_0037280.1">
    <property type="protein sequence ID" value="TraesPARA_EIv1.0_0037280.1.CDS1"/>
    <property type="gene ID" value="TraesPARA_EIv1.0_0037280"/>
</dbReference>
<dbReference type="Gramene" id="TraesPARA_EIv1.0_0039470.1">
    <property type="protein sequence ID" value="TraesPARA_EIv1.0_0039470.1.CDS1"/>
    <property type="gene ID" value="TraesPARA_EIv1.0_0039470"/>
</dbReference>
<dbReference type="Gramene" id="TraesPARA_EIv1.0_0046330.1">
    <property type="protein sequence ID" value="TraesPARA_EIv1.0_0046330.1.CDS1"/>
    <property type="gene ID" value="TraesPARA_EIv1.0_0046330"/>
</dbReference>
<dbReference type="Gramene" id="TraesPARA_EIv1.0_0170230.1">
    <property type="protein sequence ID" value="TraesPARA_EIv1.0_0170230.1.CDS1"/>
    <property type="gene ID" value="TraesPARA_EIv1.0_0170230"/>
</dbReference>
<dbReference type="Gramene" id="TraesPARA_EIv1.0_0170260.1">
    <property type="protein sequence ID" value="TraesPARA_EIv1.0_0170260.1.CDS1"/>
    <property type="gene ID" value="TraesPARA_EIv1.0_0170260"/>
</dbReference>
<dbReference type="Gramene" id="TraesPARA_EIv1.0_0178880.1">
    <property type="protein sequence ID" value="TraesPARA_EIv1.0_0178880.1.CDS1"/>
    <property type="gene ID" value="TraesPARA_EIv1.0_0178880"/>
</dbReference>
<dbReference type="Gramene" id="TraesPARA_EIv1.0_0201580.1">
    <property type="protein sequence ID" value="TraesPARA_EIv1.0_0201580.1.CDS1"/>
    <property type="gene ID" value="TraesPARA_EIv1.0_0201580"/>
</dbReference>
<dbReference type="Gramene" id="TraesPARA_EIv1.0_0202210.1">
    <property type="protein sequence ID" value="TraesPARA_EIv1.0_0202210.1.CDS1"/>
    <property type="gene ID" value="TraesPARA_EIv1.0_0202210"/>
</dbReference>
<dbReference type="Gramene" id="TraesPARA_EIv1.0_0202260.1">
    <property type="protein sequence ID" value="TraesPARA_EIv1.0_0202260.1.CDS1"/>
    <property type="gene ID" value="TraesPARA_EIv1.0_0202260"/>
</dbReference>
<dbReference type="Gramene" id="TraesPARA_EIv1.0_0202300.1">
    <property type="protein sequence ID" value="TraesPARA_EIv1.0_0202300.1.CDS1"/>
    <property type="gene ID" value="TraesPARA_EIv1.0_0202300"/>
</dbReference>
<dbReference type="Gramene" id="TraesPARA_EIv1.0_0202300.2">
    <property type="protein sequence ID" value="TraesPARA_EIv1.0_0202300.2.CDS1"/>
    <property type="gene ID" value="TraesPARA_EIv1.0_0202300"/>
</dbReference>
<dbReference type="Gramene" id="TraesPARA_EIv1.0_0283170.1">
    <property type="protein sequence ID" value="TraesPARA_EIv1.0_0283170.1.CDS1"/>
    <property type="gene ID" value="TraesPARA_EIv1.0_0283170"/>
</dbReference>
<dbReference type="Gramene" id="TraesPARA_EIv1.0_0283190.1">
    <property type="protein sequence ID" value="TraesPARA_EIv1.0_0283190.1.CDS1"/>
    <property type="gene ID" value="TraesPARA_EIv1.0_0283190"/>
</dbReference>
<dbReference type="Gramene" id="TraesPARA_EIv1.0_0289010.1">
    <property type="protein sequence ID" value="TraesPARA_EIv1.0_0289010.1.CDS1"/>
    <property type="gene ID" value="TraesPARA_EIv1.0_0289010"/>
</dbReference>
<dbReference type="Gramene" id="TraesPARA_EIv1.0_0291750.1">
    <property type="protein sequence ID" value="TraesPARA_EIv1.0_0291750.1.CDS1"/>
    <property type="gene ID" value="TraesPARA_EIv1.0_0291750"/>
</dbReference>
<dbReference type="Gramene" id="TraesPARA_EIv1.0_0310690.1">
    <property type="protein sequence ID" value="TraesPARA_EIv1.0_0310690.1.CDS1"/>
    <property type="gene ID" value="TraesPARA_EIv1.0_0310690"/>
</dbReference>
<dbReference type="Gramene" id="TraesPARA_EIv1.0_0310740.1">
    <property type="protein sequence ID" value="TraesPARA_EIv1.0_0310740.1.CDS1"/>
    <property type="gene ID" value="TraesPARA_EIv1.0_0310740"/>
</dbReference>
<dbReference type="Gramene" id="TraesPARA_EIv1.0_0310970.1">
    <property type="protein sequence ID" value="TraesPARA_EIv1.0_0310970.1.CDS1"/>
    <property type="gene ID" value="TraesPARA_EIv1.0_0310970"/>
</dbReference>
<dbReference type="Gramene" id="TraesPARA_EIv1.0_0311000.1">
    <property type="protein sequence ID" value="TraesPARA_EIv1.0_0311000.1.CDS1"/>
    <property type="gene ID" value="TraesPARA_EIv1.0_0311000"/>
</dbReference>
<dbReference type="Gramene" id="TraesPARA_EIv1.0_0374140.1">
    <property type="protein sequence ID" value="TraesPARA_EIv1.0_0374140.1.CDS1"/>
    <property type="gene ID" value="TraesPARA_EIv1.0_0374140"/>
</dbReference>
<dbReference type="Gramene" id="TraesPARA_EIv1.0_0390280.1">
    <property type="protein sequence ID" value="TraesPARA_EIv1.0_0390280.1.CDS1"/>
    <property type="gene ID" value="TraesPARA_EIv1.0_0390280"/>
</dbReference>
<dbReference type="Gramene" id="TraesPARA_EIv1.0_0540620.1">
    <property type="protein sequence ID" value="TraesPARA_EIv1.0_0540620.1.CDS1"/>
    <property type="gene ID" value="TraesPARA_EIv1.0_0540620"/>
</dbReference>
<dbReference type="Gramene" id="TraesPARA_EIv1.0_0576720.1">
    <property type="protein sequence ID" value="TraesPARA_EIv1.0_0576720.1.CDS1"/>
    <property type="gene ID" value="TraesPARA_EIv1.0_0576720"/>
</dbReference>
<dbReference type="Gramene" id="TraesPARA_EIv1.0_0700110.1">
    <property type="protein sequence ID" value="TraesPARA_EIv1.0_0700110.1.CDS1"/>
    <property type="gene ID" value="TraesPARA_EIv1.0_0700110"/>
</dbReference>
<dbReference type="Gramene" id="TraesPARA_EIv1.0_0800970.1">
    <property type="protein sequence ID" value="TraesPARA_EIv1.0_0800970.1.CDS1"/>
    <property type="gene ID" value="TraesPARA_EIv1.0_0800970"/>
</dbReference>
<dbReference type="Gramene" id="TraesPARA_EIv1.0_0856100.1">
    <property type="protein sequence ID" value="TraesPARA_EIv1.0_0856100.1.CDS1"/>
    <property type="gene ID" value="TraesPARA_EIv1.0_0856100"/>
</dbReference>
<dbReference type="Gramene" id="TraesPARA_EIv1.0_0972430.1">
    <property type="protein sequence ID" value="TraesPARA_EIv1.0_0972430.1.CDS1"/>
    <property type="gene ID" value="TraesPARA_EIv1.0_0972430"/>
</dbReference>
<dbReference type="Gramene" id="TraesPARA_EIv1.0_1008110.1">
    <property type="protein sequence ID" value="TraesPARA_EIv1.0_1008110.1.CDS1"/>
    <property type="gene ID" value="TraesPARA_EIv1.0_1008110"/>
</dbReference>
<dbReference type="Gramene" id="TraesPARA_EIv1.0_1084050.1">
    <property type="protein sequence ID" value="TraesPARA_EIv1.0_1084050.1.CDS1"/>
    <property type="gene ID" value="TraesPARA_EIv1.0_1084050"/>
</dbReference>
<dbReference type="Gramene" id="TraesPARA_EIv1.0_1139770.1">
    <property type="protein sequence ID" value="TraesPARA_EIv1.0_1139770.1.CDS1"/>
    <property type="gene ID" value="TraesPARA_EIv1.0_1139770"/>
</dbReference>
<dbReference type="Gramene" id="TraesPARA_EIv1.0_1215750.1">
    <property type="protein sequence ID" value="TraesPARA_EIv1.0_1215750.1.CDS1"/>
    <property type="gene ID" value="TraesPARA_EIv1.0_1215750"/>
</dbReference>
<dbReference type="Gramene" id="TraesPARA_EIv1.0_1215790.1">
    <property type="protein sequence ID" value="TraesPARA_EIv1.0_1215790.1.CDS1"/>
    <property type="gene ID" value="TraesPARA_EIv1.0_1215790"/>
</dbReference>
<dbReference type="Gramene" id="TraesPARA_EIv1.0_1295240.1">
    <property type="protein sequence ID" value="TraesPARA_EIv1.0_1295240.1.CDS1"/>
    <property type="gene ID" value="TraesPARA_EIv1.0_1295240"/>
</dbReference>
<dbReference type="Gramene" id="TraesPARA_EIv1.0_1300550.1">
    <property type="protein sequence ID" value="TraesPARA_EIv1.0_1300550.1.CDS1"/>
    <property type="gene ID" value="TraesPARA_EIv1.0_1300550"/>
</dbReference>
<dbReference type="Gramene" id="TraesPARA_EIv1.0_1379190.1">
    <property type="protein sequence ID" value="TraesPARA_EIv1.0_1379190.1.CDS1"/>
    <property type="gene ID" value="TraesPARA_EIv1.0_1379190"/>
</dbReference>
<dbReference type="Gramene" id="TraesPARA_EIv1.0_1471520.1">
    <property type="protein sequence ID" value="TraesPARA_EIv1.0_1471520.1.CDS1"/>
    <property type="gene ID" value="TraesPARA_EIv1.0_1471520"/>
</dbReference>
<dbReference type="Gramene" id="TraesPARA_EIv1.0_1477460.1">
    <property type="protein sequence ID" value="TraesPARA_EIv1.0_1477460.1.CDS1"/>
    <property type="gene ID" value="TraesPARA_EIv1.0_1477460"/>
</dbReference>
<dbReference type="Gramene" id="TraesPARA_EIv1.0_1677270.1">
    <property type="protein sequence ID" value="TraesPARA_EIv1.0_1677270.1.CDS1"/>
    <property type="gene ID" value="TraesPARA_EIv1.0_1677270"/>
</dbReference>
<dbReference type="Gramene" id="TraesPARA_EIv1.0_1810100.1">
    <property type="protein sequence ID" value="TraesPARA_EIv1.0_1810100.1.CDS1"/>
    <property type="gene ID" value="TraesPARA_EIv1.0_1810100"/>
</dbReference>
<dbReference type="Gramene" id="TraesPARA_EIv1.0_1902220.1">
    <property type="protein sequence ID" value="TraesPARA_EIv1.0_1902220.1.CDS1"/>
    <property type="gene ID" value="TraesPARA_EIv1.0_1902220"/>
</dbReference>
<dbReference type="Gramene" id="TraesPARA_EIv1.0_1902480.1">
    <property type="protein sequence ID" value="TraesPARA_EIv1.0_1902480.1.CDS1"/>
    <property type="gene ID" value="TraesPARA_EIv1.0_1902480"/>
</dbReference>
<dbReference type="Gramene" id="TraesPARA_EIv1.0_1910870.1">
    <property type="protein sequence ID" value="TraesPARA_EIv1.0_1910870.1.CDS1"/>
    <property type="gene ID" value="TraesPARA_EIv1.0_1910870"/>
</dbReference>
<dbReference type="Gramene" id="TraesPARA_EIv1.0_1924880.1">
    <property type="protein sequence ID" value="TraesPARA_EIv1.0_1924880.1.CDS1"/>
    <property type="gene ID" value="TraesPARA_EIv1.0_1924880"/>
</dbReference>
<dbReference type="Gramene" id="TraesPARA_EIv1.0_2014240.1">
    <property type="protein sequence ID" value="TraesPARA_EIv1.0_2014240.1.CDS1"/>
    <property type="gene ID" value="TraesPARA_EIv1.0_2014240"/>
</dbReference>
<dbReference type="Gramene" id="TraesPARA_EIv1.0_2014340.1">
    <property type="protein sequence ID" value="TraesPARA_EIv1.0_2014340.1.CDS1"/>
    <property type="gene ID" value="TraesPARA_EIv1.0_2014340"/>
</dbReference>
<dbReference type="Gramene" id="TraesPARA_EIv1.0_2015090.1">
    <property type="protein sequence ID" value="TraesPARA_EIv1.0_2015090.1.CDS1"/>
    <property type="gene ID" value="TraesPARA_EIv1.0_2015090"/>
</dbReference>
<dbReference type="Gramene" id="TraesPARA_EIv1.0_2185630.1">
    <property type="protein sequence ID" value="TraesPARA_EIv1.0_2185630.1.CDS1"/>
    <property type="gene ID" value="TraesPARA_EIv1.0_2185630"/>
</dbReference>
<dbReference type="Gramene" id="TraesPARA_EIv1.0_2199460.1">
    <property type="protein sequence ID" value="TraesPARA_EIv1.0_2199460.1.CDS1"/>
    <property type="gene ID" value="TraesPARA_EIv1.0_2199460"/>
</dbReference>
<dbReference type="Gramene" id="TraesPARA_EIv1.0_2209130.1">
    <property type="protein sequence ID" value="TraesPARA_EIv1.0_2209130.1.CDS1"/>
    <property type="gene ID" value="TraesPARA_EIv1.0_2209130"/>
</dbReference>
<dbReference type="Gramene" id="TraesPARA_EIv1.0_2209470.1">
    <property type="protein sequence ID" value="TraesPARA_EIv1.0_2209470.1.CDS1"/>
    <property type="gene ID" value="TraesPARA_EIv1.0_2209470"/>
</dbReference>
<dbReference type="Gramene" id="TraesPARA_EIv1.0_2250280.1">
    <property type="protein sequence ID" value="TraesPARA_EIv1.0_2250280.1.CDS1"/>
    <property type="gene ID" value="TraesPARA_EIv1.0_2250280"/>
</dbReference>
<dbReference type="Gramene" id="TraesPARA_EIv1.0_2250280.2">
    <property type="protein sequence ID" value="TraesPARA_EIv1.0_2250280.2.CDS1"/>
    <property type="gene ID" value="TraesPARA_EIv1.0_2250280"/>
</dbReference>
<dbReference type="Gramene" id="TraesPARA_EIv1.0_2250510.1">
    <property type="protein sequence ID" value="TraesPARA_EIv1.0_2250510.1.CDS1"/>
    <property type="gene ID" value="TraesPARA_EIv1.0_2250510"/>
</dbReference>
<dbReference type="Gramene" id="TraesPARA_EIv1.0_2254340.1">
    <property type="protein sequence ID" value="TraesPARA_EIv1.0_2254340.1.CDS1"/>
    <property type="gene ID" value="TraesPARA_EIv1.0_2254340"/>
</dbReference>
<dbReference type="Gramene" id="TraesPARA_EIv1.0_2254480.1">
    <property type="protein sequence ID" value="TraesPARA_EIv1.0_2254480.1.CDS1"/>
    <property type="gene ID" value="TraesPARA_EIv1.0_2254480"/>
</dbReference>
<dbReference type="Gramene" id="TraesPARA_EIv1.0_2254500.1">
    <property type="protein sequence ID" value="TraesPARA_EIv1.0_2254500.1.CDS1"/>
    <property type="gene ID" value="TraesPARA_EIv1.0_2254500"/>
</dbReference>
<dbReference type="Gramene" id="TraesPARA_EIv1.0_2254520.1">
    <property type="protein sequence ID" value="TraesPARA_EIv1.0_2254520.1.CDS1"/>
    <property type="gene ID" value="TraesPARA_EIv1.0_2254520"/>
</dbReference>
<dbReference type="Gramene" id="TraesPARA_EIv1.0_2254570.1">
    <property type="protein sequence ID" value="TraesPARA_EIv1.0_2254570.1.CDS1"/>
    <property type="gene ID" value="TraesPARA_EIv1.0_2254570"/>
</dbReference>
<dbReference type="Gramene" id="TraesPARA_EIv1.0_2254650.1">
    <property type="protein sequence ID" value="TraesPARA_EIv1.0_2254650.1.CDS1"/>
    <property type="gene ID" value="TraesPARA_EIv1.0_2254650"/>
</dbReference>
<dbReference type="Gramene" id="TraesPARA_EIv1.0_2369800.1">
    <property type="protein sequence ID" value="TraesPARA_EIv1.0_2369800.1.CDS1"/>
    <property type="gene ID" value="TraesPARA_EIv1.0_2369800"/>
</dbReference>
<dbReference type="Gramene" id="TraesPARA_EIv1.0_2370070.1">
    <property type="protein sequence ID" value="TraesPARA_EIv1.0_2370070.1.CDS1"/>
    <property type="gene ID" value="TraesPARA_EIv1.0_2370070"/>
</dbReference>
<dbReference type="Gramene" id="TraesPARA_EIv1.0_2370130.1">
    <property type="protein sequence ID" value="TraesPARA_EIv1.0_2370130.1.CDS1"/>
    <property type="gene ID" value="TraesPARA_EIv1.0_2370130"/>
</dbReference>
<dbReference type="Gramene" id="TraesPARA_EIv1.0_2370140.1">
    <property type="protein sequence ID" value="TraesPARA_EIv1.0_2370140.1.CDS1"/>
    <property type="gene ID" value="TraesPARA_EIv1.0_2370140"/>
</dbReference>
<dbReference type="Gramene" id="TraesPARA_EIv1.0_2370500.1">
    <property type="protein sequence ID" value="TraesPARA_EIv1.0_2370500.1.CDS1"/>
    <property type="gene ID" value="TraesPARA_EIv1.0_2370500"/>
</dbReference>
<dbReference type="Gramene" id="TraesPARA_EIv1.0_2526450.1">
    <property type="protein sequence ID" value="TraesPARA_EIv1.0_2526450.1.CDS1"/>
    <property type="gene ID" value="TraesPARA_EIv1.0_2526450"/>
</dbReference>
<dbReference type="Gramene" id="TraesPARA_EIv1.0_2526550.1">
    <property type="protein sequence ID" value="TraesPARA_EIv1.0_2526550.1.CDS1"/>
    <property type="gene ID" value="TraesPARA_EIv1.0_2526550"/>
</dbReference>
<dbReference type="Gramene" id="TraesPARA_EIv1.0_2530620.1">
    <property type="protein sequence ID" value="TraesPARA_EIv1.0_2530620.1.CDS1"/>
    <property type="gene ID" value="TraesPARA_EIv1.0_2530620"/>
</dbReference>
<dbReference type="Gramene" id="TraesPARA_EIv1.0_2530850.1">
    <property type="protein sequence ID" value="TraesPARA_EIv1.0_2530850.1.CDS1"/>
    <property type="gene ID" value="TraesPARA_EIv1.0_2530850"/>
</dbReference>
<dbReference type="Gramene" id="TraesPARA_EIv1.0_2530880.1">
    <property type="protein sequence ID" value="TraesPARA_EIv1.0_2530880.1.CDS1"/>
    <property type="gene ID" value="TraesPARA_EIv1.0_2530880"/>
</dbReference>
<dbReference type="Gramene" id="TraesPARA_EIv1.0_2536600.1">
    <property type="protein sequence ID" value="TraesPARA_EIv1.0_2536600.1.CDS1"/>
    <property type="gene ID" value="TraesPARA_EIv1.0_2536600"/>
</dbReference>
<dbReference type="Gramene" id="TraesRN1A0100640400.1">
    <property type="protein sequence ID" value="TraesRN1A0100640400.1"/>
    <property type="gene ID" value="TraesRN1A0100640400"/>
</dbReference>
<dbReference type="Gramene" id="TraesRN1A0100713400.1">
    <property type="protein sequence ID" value="TraesRN1A0100713400.1"/>
    <property type="gene ID" value="TraesRN1A0100713400"/>
</dbReference>
<dbReference type="Gramene" id="TraesRN1A0100738400.1">
    <property type="protein sequence ID" value="TraesRN1A0100738400.1"/>
    <property type="gene ID" value="TraesRN1A0100738400"/>
</dbReference>
<dbReference type="Gramene" id="TraesRN1B0101053300.1">
    <property type="protein sequence ID" value="TraesRN1B0101053300.1"/>
    <property type="gene ID" value="TraesRN1B0101053300"/>
</dbReference>
<dbReference type="Gramene" id="TraesRN1B0101055900.1">
    <property type="protein sequence ID" value="TraesRN1B0101055900.1"/>
    <property type="gene ID" value="TraesRN1B0101055900"/>
</dbReference>
<dbReference type="Gramene" id="TraesRN1B0101059600.1">
    <property type="protein sequence ID" value="TraesRN1B0101059600.1"/>
    <property type="gene ID" value="TraesRN1B0101059600"/>
</dbReference>
<dbReference type="Gramene" id="TraesRN1B0101060100.1">
    <property type="protein sequence ID" value="TraesRN1B0101060100.1"/>
    <property type="gene ID" value="TraesRN1B0101060100"/>
</dbReference>
<dbReference type="Gramene" id="TraesRN1D0100607300.1">
    <property type="protein sequence ID" value="TraesRN1D0100607300.1"/>
    <property type="gene ID" value="TraesRN1D0100607300"/>
</dbReference>
<dbReference type="Gramene" id="TraesRN1D0100700900.1">
    <property type="protein sequence ID" value="TraesRN1D0100700900.1"/>
    <property type="gene ID" value="TraesRN1D0100700900"/>
</dbReference>
<dbReference type="Gramene" id="TraesRN1D0100902200.1">
    <property type="protein sequence ID" value="TraesRN1D0100902200.1"/>
    <property type="gene ID" value="TraesRN1D0100902200"/>
</dbReference>
<dbReference type="Gramene" id="TraesRN1D0100905200.1">
    <property type="protein sequence ID" value="TraesRN1D0100905200.1"/>
    <property type="gene ID" value="TraesRN1D0100905200"/>
</dbReference>
<dbReference type="Gramene" id="TraesRN1D0100905600.1">
    <property type="protein sequence ID" value="TraesRN1D0100905600.1"/>
    <property type="gene ID" value="TraesRN1D0100905600"/>
</dbReference>
<dbReference type="Gramene" id="TraesRN2A0100722300.1">
    <property type="protein sequence ID" value="TraesRN2A0100722300.1"/>
    <property type="gene ID" value="TraesRN2A0100722300"/>
</dbReference>
<dbReference type="Gramene" id="TraesRN2A0100894600.1">
    <property type="protein sequence ID" value="TraesRN2A0100894600.1"/>
    <property type="gene ID" value="TraesRN2A0100894600"/>
</dbReference>
<dbReference type="Gramene" id="TraesRN2B0100457100.1">
    <property type="protein sequence ID" value="TraesRN2B0100457100.1"/>
    <property type="gene ID" value="TraesRN2B0100457100"/>
</dbReference>
<dbReference type="Gramene" id="TraesRN2B0100846900.1">
    <property type="protein sequence ID" value="TraesRN2B0100846900.1"/>
    <property type="gene ID" value="TraesRN2B0100846900"/>
</dbReference>
<dbReference type="Gramene" id="TraesRN2D0100730900.1">
    <property type="protein sequence ID" value="TraesRN2D0100730900.1"/>
    <property type="gene ID" value="TraesRN2D0100730900"/>
</dbReference>
<dbReference type="Gramene" id="TraesRN3A0100320600.1">
    <property type="protein sequence ID" value="TraesRN3A0100320600.1"/>
    <property type="gene ID" value="TraesRN3A0100320600"/>
</dbReference>
<dbReference type="Gramene" id="TraesRN3A0100910900.1">
    <property type="protein sequence ID" value="TraesRN3A0100910900.1"/>
    <property type="gene ID" value="TraesRN3A0100910900"/>
</dbReference>
<dbReference type="Gramene" id="TraesRN3A0100911000.1">
    <property type="protein sequence ID" value="TraesRN3A0100911000.1"/>
    <property type="gene ID" value="TraesRN3A0100911000"/>
</dbReference>
<dbReference type="Gramene" id="TraesRN3B0100391100.1">
    <property type="protein sequence ID" value="TraesRN3B0100391100.1"/>
    <property type="gene ID" value="TraesRN3B0100391100"/>
</dbReference>
<dbReference type="Gramene" id="TraesRN3B0100767700.1">
    <property type="protein sequence ID" value="TraesRN3B0100767700.1"/>
    <property type="gene ID" value="TraesRN3B0100767700"/>
</dbReference>
<dbReference type="Gramene" id="TraesRN3D0100336800.1">
    <property type="protein sequence ID" value="TraesRN3D0100336800.1"/>
    <property type="gene ID" value="TraesRN3D0100336800"/>
</dbReference>
<dbReference type="Gramene" id="TraesRN3D0100854400.1">
    <property type="protein sequence ID" value="TraesRN3D0100854400.1"/>
    <property type="gene ID" value="TraesRN3D0100854400"/>
</dbReference>
<dbReference type="Gramene" id="TraesRN4A0100060100.1">
    <property type="protein sequence ID" value="TraesRN4A0100060100.1"/>
    <property type="gene ID" value="TraesRN4A0100060100"/>
</dbReference>
<dbReference type="Gramene" id="TraesRN4A0100116600.1">
    <property type="protein sequence ID" value="TraesRN4A0100116600.1"/>
    <property type="gene ID" value="TraesRN4A0100116600"/>
</dbReference>
<dbReference type="Gramene" id="TraesRN4A0100969000.1">
    <property type="protein sequence ID" value="TraesRN4A0100969000.1"/>
    <property type="gene ID" value="TraesRN4A0100969000"/>
</dbReference>
<dbReference type="Gramene" id="TraesRN4A0100969100.1">
    <property type="protein sequence ID" value="TraesRN4A0100969100.1"/>
    <property type="gene ID" value="TraesRN4A0100969100"/>
</dbReference>
<dbReference type="Gramene" id="TraesRN4D0100612600.1">
    <property type="protein sequence ID" value="TraesRN4D0100612600.1"/>
    <property type="gene ID" value="TraesRN4D0100612600"/>
</dbReference>
<dbReference type="Gramene" id="TraesRN4D0100671300.1">
    <property type="protein sequence ID" value="TraesRN4D0100671300.1"/>
    <property type="gene ID" value="TraesRN4D0100671300"/>
</dbReference>
<dbReference type="Gramene" id="TraesRN5D0100480500.1">
    <property type="protein sequence ID" value="TraesRN5D0100480500.1"/>
    <property type="gene ID" value="TraesRN5D0100480500"/>
</dbReference>
<dbReference type="Gramene" id="TraesRN6B0100185500.1">
    <property type="protein sequence ID" value="TraesRN6B0100185500.1"/>
    <property type="gene ID" value="TraesRN6B0100185500"/>
</dbReference>
<dbReference type="Gramene" id="TraesRN6B0100186500.1">
    <property type="protein sequence ID" value="TraesRN6B0100186500.1"/>
    <property type="gene ID" value="TraesRN6B0100186500"/>
</dbReference>
<dbReference type="Gramene" id="TraesRN6B0100192000.1">
    <property type="protein sequence ID" value="TraesRN6B0100192000.1"/>
    <property type="gene ID" value="TraesRN6B0100192000"/>
</dbReference>
<dbReference type="Gramene" id="TraesRN6D0100145900.1">
    <property type="protein sequence ID" value="TraesRN6D0100145900.1"/>
    <property type="gene ID" value="TraesRN6D0100145900"/>
</dbReference>
<dbReference type="Gramene" id="TraesRN6D0100149100.1">
    <property type="protein sequence ID" value="TraesRN6D0100149100.1"/>
    <property type="gene ID" value="TraesRN6D0100149100"/>
</dbReference>
<dbReference type="Gramene" id="TraesRN6D0100208900.1">
    <property type="protein sequence ID" value="TraesRN6D0100208900.1"/>
    <property type="gene ID" value="TraesRN6D0100208900"/>
</dbReference>
<dbReference type="Gramene" id="TraesRN6D0100352700.1">
    <property type="protein sequence ID" value="TraesRN6D0100352700.1"/>
    <property type="gene ID" value="TraesRN6D0100352700"/>
</dbReference>
<dbReference type="Gramene" id="TraesRN7A0100213900.1">
    <property type="protein sequence ID" value="TraesRN7A0100213900.1"/>
    <property type="gene ID" value="TraesRN7A0100213900"/>
</dbReference>
<dbReference type="Gramene" id="TraesRN7A0100216100.1">
    <property type="protein sequence ID" value="TraesRN7A0100216100.1"/>
    <property type="gene ID" value="TraesRN7A0100216100"/>
</dbReference>
<dbReference type="Gramene" id="TraesRN7A0100248000.1">
    <property type="protein sequence ID" value="TraesRN7A0100248000.1"/>
    <property type="gene ID" value="TraesRN7A0100248000"/>
</dbReference>
<dbReference type="Gramene" id="TraesRN7A0100249200.1">
    <property type="protein sequence ID" value="TraesRN7A0100249200.1"/>
    <property type="gene ID" value="TraesRN7A0100249200"/>
</dbReference>
<dbReference type="Gramene" id="TraesRN7A0100249600.1">
    <property type="protein sequence ID" value="TraesRN7A0100249600.1"/>
    <property type="gene ID" value="TraesRN7A0100249600"/>
</dbReference>
<dbReference type="Gramene" id="TraesRN7B0100041100.1">
    <property type="protein sequence ID" value="TraesRN7B0100041100.1"/>
    <property type="gene ID" value="TraesRN7B0100041100"/>
</dbReference>
<dbReference type="Gramene" id="TraesRN7B0100043800.1">
    <property type="protein sequence ID" value="TraesRN7B0100043800.1"/>
    <property type="gene ID" value="TraesRN7B0100043800"/>
</dbReference>
<dbReference type="Gramene" id="TraesRN7B0100044600.1">
    <property type="protein sequence ID" value="TraesRN7B0100044600.1"/>
    <property type="gene ID" value="TraesRN7B0100044600"/>
</dbReference>
<dbReference type="Gramene" id="TraesRN7B0100050100.1">
    <property type="protein sequence ID" value="TraesRN7B0100050100.1"/>
    <property type="gene ID" value="TraesRN7B0100050100"/>
</dbReference>
<dbReference type="Gramene" id="TraesRN7D0100227700.1">
    <property type="protein sequence ID" value="TraesRN7D0100227700.1"/>
    <property type="gene ID" value="TraesRN7D0100227700"/>
</dbReference>
<dbReference type="Gramene" id="TraesRN7D0100267400.1">
    <property type="protein sequence ID" value="TraesRN7D0100267400.1"/>
    <property type="gene ID" value="TraesRN7D0100267400"/>
</dbReference>
<dbReference type="Gramene" id="TraesRN7D0100270000.1">
    <property type="protein sequence ID" value="TraesRN7D0100270000.1"/>
    <property type="gene ID" value="TraesRN7D0100270000"/>
</dbReference>
<dbReference type="Gramene" id="TraesRN7D0100270300.1">
    <property type="protein sequence ID" value="TraesRN7D0100270300.1"/>
    <property type="gene ID" value="TraesRN7D0100270300"/>
</dbReference>
<dbReference type="Gramene" id="TraesRN7D0100271200.1">
    <property type="protein sequence ID" value="TraesRN7D0100271200.1"/>
    <property type="gene ID" value="TraesRN7D0100271200"/>
</dbReference>
<dbReference type="Gramene" id="TraesRN7D0100335400.1">
    <property type="protein sequence ID" value="TraesRN7D0100335400.1"/>
    <property type="gene ID" value="TraesRN7D0100335400"/>
</dbReference>
<dbReference type="Gramene" id="TraesRN7D0100370200.1">
    <property type="protein sequence ID" value="TraesRN7D0100370200.1"/>
    <property type="gene ID" value="TraesRN7D0100370200"/>
</dbReference>
<dbReference type="Gramene" id="TraesRN7D0100370300.1">
    <property type="protein sequence ID" value="TraesRN7D0100370300.1"/>
    <property type="gene ID" value="TraesRN7D0100370300"/>
</dbReference>
<dbReference type="Gramene" id="TraesROB_scaffold_000971_01G001100.1">
    <property type="protein sequence ID" value="TraesROB_scaffold_000971_01G001100.1"/>
    <property type="gene ID" value="TraesROB_scaffold_000971_01G001100"/>
</dbReference>
<dbReference type="Gramene" id="TraesROB_scaffold_003788_01G000100.1">
    <property type="protein sequence ID" value="TraesROB_scaffold_003788_01G000100.1"/>
    <property type="gene ID" value="TraesROB_scaffold_003788_01G000100"/>
</dbReference>
<dbReference type="Gramene" id="TraesROB_scaffold_004357_01G000600.1">
    <property type="protein sequence ID" value="TraesROB_scaffold_004357_01G000600.1"/>
    <property type="gene ID" value="TraesROB_scaffold_004357_01G000600"/>
</dbReference>
<dbReference type="Gramene" id="TraesROB_scaffold_009210_01G000400.1">
    <property type="protein sequence ID" value="TraesROB_scaffold_009210_01G000400.1"/>
    <property type="gene ID" value="TraesROB_scaffold_009210_01G000400"/>
</dbReference>
<dbReference type="Gramene" id="TraesROB_scaffold_012158_01G000200.1">
    <property type="protein sequence ID" value="TraesROB_scaffold_012158_01G000200.1"/>
    <property type="gene ID" value="TraesROB_scaffold_012158_01G000200"/>
</dbReference>
<dbReference type="Gramene" id="TraesROB_scaffold_012158_01G000700.1">
    <property type="protein sequence ID" value="TraesROB_scaffold_012158_01G000700.1"/>
    <property type="gene ID" value="TraesROB_scaffold_012158_01G000700"/>
</dbReference>
<dbReference type="Gramene" id="TraesROB_scaffold_012412_01G000400.1">
    <property type="protein sequence ID" value="TraesROB_scaffold_012412_01G000400.1"/>
    <property type="gene ID" value="TraesROB_scaffold_012412_01G000400"/>
</dbReference>
<dbReference type="Gramene" id="TraesROB_scaffold_012412_01G000500.1">
    <property type="protein sequence ID" value="TraesROB_scaffold_012412_01G000500.1"/>
    <property type="gene ID" value="TraesROB_scaffold_012412_01G000500"/>
</dbReference>
<dbReference type="Gramene" id="TraesROB_scaffold_013379_01G000300.1">
    <property type="protein sequence ID" value="TraesROB_scaffold_013379_01G000300.1"/>
    <property type="gene ID" value="TraesROB_scaffold_013379_01G000300"/>
</dbReference>
<dbReference type="Gramene" id="TraesROB_scaffold_015375_01G000400.1">
    <property type="protein sequence ID" value="TraesROB_scaffold_015375_01G000400.1"/>
    <property type="gene ID" value="TraesROB_scaffold_015375_01G000400"/>
</dbReference>
<dbReference type="Gramene" id="TraesROB_scaffold_016704_01G000200.1">
    <property type="protein sequence ID" value="TraesROB_scaffold_016704_01G000200.1"/>
    <property type="gene ID" value="TraesROB_scaffold_016704_01G000200"/>
</dbReference>
<dbReference type="Gramene" id="TraesROB_scaffold_019345_01G000100.1">
    <property type="protein sequence ID" value="TraesROB_scaffold_019345_01G000100.1"/>
    <property type="gene ID" value="TraesROB_scaffold_019345_01G000100"/>
</dbReference>
<dbReference type="Gramene" id="TraesROB_scaffold_021338_01G000100.1">
    <property type="protein sequence ID" value="TraesROB_scaffold_021338_01G000100.1"/>
    <property type="gene ID" value="TraesROB_scaffold_021338_01G000100"/>
</dbReference>
<dbReference type="Gramene" id="TraesROB_scaffold_021883_01G000300.1">
    <property type="protein sequence ID" value="TraesROB_scaffold_021883_01G000300.1"/>
    <property type="gene ID" value="TraesROB_scaffold_021883_01G000300"/>
</dbReference>
<dbReference type="Gramene" id="TraesROB_scaffold_025515_01G000100.1">
    <property type="protein sequence ID" value="TraesROB_scaffold_025515_01G000100.1"/>
    <property type="gene ID" value="TraesROB_scaffold_025515_01G000100"/>
</dbReference>
<dbReference type="Gramene" id="TraesROB_scaffold_025871_01G000100.1">
    <property type="protein sequence ID" value="TraesROB_scaffold_025871_01G000100.1"/>
    <property type="gene ID" value="TraesROB_scaffold_025871_01G000100"/>
</dbReference>
<dbReference type="Gramene" id="TraesROB_scaffold_026482_01G000500.1">
    <property type="protein sequence ID" value="TraesROB_scaffold_026482_01G000500.1"/>
    <property type="gene ID" value="TraesROB_scaffold_026482_01G000500"/>
</dbReference>
<dbReference type="Gramene" id="TraesROB_scaffold_029161_01G000200.1">
    <property type="protein sequence ID" value="TraesROB_scaffold_029161_01G000200.1"/>
    <property type="gene ID" value="TraesROB_scaffold_029161_01G000200"/>
</dbReference>
<dbReference type="Gramene" id="TraesROB_scaffold_029640_01G000100.1">
    <property type="protein sequence ID" value="TraesROB_scaffold_029640_01G000100.1"/>
    <property type="gene ID" value="TraesROB_scaffold_029640_01G000100"/>
</dbReference>
<dbReference type="Gramene" id="TraesROB_scaffold_034113_01G000100.1">
    <property type="protein sequence ID" value="TraesROB_scaffold_034113_01G000100.1"/>
    <property type="gene ID" value="TraesROB_scaffold_034113_01G000100"/>
</dbReference>
<dbReference type="Gramene" id="TraesROB_scaffold_034345_01G000100.1">
    <property type="protein sequence ID" value="TraesROB_scaffold_034345_01G000100.1"/>
    <property type="gene ID" value="TraesROB_scaffold_034345_01G000100"/>
</dbReference>
<dbReference type="Gramene" id="TraesROB_scaffold_040298_01G000100.1">
    <property type="protein sequence ID" value="TraesROB_scaffold_040298_01G000100.1"/>
    <property type="gene ID" value="TraesROB_scaffold_040298_01G000100"/>
</dbReference>
<dbReference type="Gramene" id="TraesROB_scaffold_040448_01G000100.1">
    <property type="protein sequence ID" value="TraesROB_scaffold_040448_01G000100.1"/>
    <property type="gene ID" value="TraesROB_scaffold_040448_01G000100"/>
</dbReference>
<dbReference type="Gramene" id="TraesROB_scaffold_041075_01G000300.1">
    <property type="protein sequence ID" value="TraesROB_scaffold_041075_01G000300.1"/>
    <property type="gene ID" value="TraesROB_scaffold_041075_01G000300"/>
</dbReference>
<dbReference type="Gramene" id="TraesROB_scaffold_042642_01G000200.1">
    <property type="protein sequence ID" value="TraesROB_scaffold_042642_01G000200.1"/>
    <property type="gene ID" value="TraesROB_scaffold_042642_01G000200"/>
</dbReference>
<dbReference type="Gramene" id="TraesROB_scaffold_043725_01G000400.1">
    <property type="protein sequence ID" value="TraesROB_scaffold_043725_01G000400.1"/>
    <property type="gene ID" value="TraesROB_scaffold_043725_01G000400"/>
</dbReference>
<dbReference type="Gramene" id="TraesROB_scaffold_045993_01G001000.1">
    <property type="protein sequence ID" value="TraesROB_scaffold_045993_01G001000.1"/>
    <property type="gene ID" value="TraesROB_scaffold_045993_01G001000"/>
</dbReference>
<dbReference type="Gramene" id="TraesROB_scaffold_050070_01G000100.1">
    <property type="protein sequence ID" value="TraesROB_scaffold_050070_01G000100.1"/>
    <property type="gene ID" value="TraesROB_scaffold_050070_01G000100"/>
</dbReference>
<dbReference type="Gramene" id="TraesROB_scaffold_053355_01G000200.1">
    <property type="protein sequence ID" value="TraesROB_scaffold_053355_01G000200.1"/>
    <property type="gene ID" value="TraesROB_scaffold_053355_01G000200"/>
</dbReference>
<dbReference type="Gramene" id="TraesROB_scaffold_054284_01G000100.1">
    <property type="protein sequence ID" value="TraesROB_scaffold_054284_01G000100.1"/>
    <property type="gene ID" value="TraesROB_scaffold_054284_01G000100"/>
</dbReference>
<dbReference type="Gramene" id="TraesROB_scaffold_054727_01G000300.1">
    <property type="protein sequence ID" value="TraesROB_scaffold_054727_01G000300.1"/>
    <property type="gene ID" value="TraesROB_scaffold_054727_01G000300"/>
</dbReference>
<dbReference type="Gramene" id="TraesROB_scaffold_055093_01G000200.1">
    <property type="protein sequence ID" value="TraesROB_scaffold_055093_01G000200.1"/>
    <property type="gene ID" value="TraesROB_scaffold_055093_01G000200"/>
</dbReference>
<dbReference type="Gramene" id="TraesROB_scaffold_059292_01G000200.1">
    <property type="protein sequence ID" value="TraesROB_scaffold_059292_01G000200.1"/>
    <property type="gene ID" value="TraesROB_scaffold_059292_01G000200"/>
</dbReference>
<dbReference type="Gramene" id="TraesROB_scaffold_060345_01G000200.1">
    <property type="protein sequence ID" value="TraesROB_scaffold_060345_01G000200.1"/>
    <property type="gene ID" value="TraesROB_scaffold_060345_01G000200"/>
</dbReference>
<dbReference type="Gramene" id="TraesROB_scaffold_060484_01G000200.1">
    <property type="protein sequence ID" value="TraesROB_scaffold_060484_01G000200.1"/>
    <property type="gene ID" value="TraesROB_scaffold_060484_01G000200"/>
</dbReference>
<dbReference type="Gramene" id="TraesROB_scaffold_061113_01G000400.1">
    <property type="protein sequence ID" value="TraesROB_scaffold_061113_01G000400.1"/>
    <property type="gene ID" value="TraesROB_scaffold_061113_01G000400"/>
</dbReference>
<dbReference type="Gramene" id="TraesROB_scaffold_062790_01G000100.1">
    <property type="protein sequence ID" value="TraesROB_scaffold_062790_01G000100.1"/>
    <property type="gene ID" value="TraesROB_scaffold_062790_01G000100"/>
</dbReference>
<dbReference type="Gramene" id="TraesROB_scaffold_062790_01G000300.1">
    <property type="protein sequence ID" value="TraesROB_scaffold_062790_01G000300.1"/>
    <property type="gene ID" value="TraesROB_scaffold_062790_01G000300"/>
</dbReference>
<dbReference type="Gramene" id="TraesROB_scaffold_063256_01G000200.1">
    <property type="protein sequence ID" value="TraesROB_scaffold_063256_01G000200.1"/>
    <property type="gene ID" value="TraesROB_scaffold_063256_01G000200"/>
</dbReference>
<dbReference type="Gramene" id="TraesROB_scaffold_065676_01G000300.1">
    <property type="protein sequence ID" value="TraesROB_scaffold_065676_01G000300.1"/>
    <property type="gene ID" value="TraesROB_scaffold_065676_01G000300"/>
</dbReference>
<dbReference type="Gramene" id="TraesROB_scaffold_069625_01G000100.1">
    <property type="protein sequence ID" value="TraesROB_scaffold_069625_01G000100.1"/>
    <property type="gene ID" value="TraesROB_scaffold_069625_01G000100"/>
</dbReference>
<dbReference type="Gramene" id="TraesROB_scaffold_072421_01G000200.1">
    <property type="protein sequence ID" value="TraesROB_scaffold_072421_01G000200.1"/>
    <property type="gene ID" value="TraesROB_scaffold_072421_01G000200"/>
</dbReference>
<dbReference type="Gramene" id="TraesROB_scaffold_072739_01G000300.1">
    <property type="protein sequence ID" value="TraesROB_scaffold_072739_01G000300.1"/>
    <property type="gene ID" value="TraesROB_scaffold_072739_01G000300"/>
</dbReference>
<dbReference type="Gramene" id="TraesROB_scaffold_075200_01G000100.1">
    <property type="protein sequence ID" value="TraesROB_scaffold_075200_01G000100.1"/>
    <property type="gene ID" value="TraesROB_scaffold_075200_01G000100"/>
</dbReference>
<dbReference type="Gramene" id="TraesROB_scaffold_083279_01G000200.1">
    <property type="protein sequence ID" value="TraesROB_scaffold_083279_01G000200.1"/>
    <property type="gene ID" value="TraesROB_scaffold_083279_01G000200"/>
</dbReference>
<dbReference type="Gramene" id="TraesROB_scaffold_084074_01G000200.1">
    <property type="protein sequence ID" value="TraesROB_scaffold_084074_01G000200.1"/>
    <property type="gene ID" value="TraesROB_scaffold_084074_01G000200"/>
</dbReference>
<dbReference type="Gramene" id="TraesROB_scaffold_085178_01G000200.1">
    <property type="protein sequence ID" value="TraesROB_scaffold_085178_01G000200.1"/>
    <property type="gene ID" value="TraesROB_scaffold_085178_01G000200"/>
</dbReference>
<dbReference type="Gramene" id="TraesROB_scaffold_093997_01G000100.1">
    <property type="protein sequence ID" value="TraesROB_scaffold_093997_01G000100.1"/>
    <property type="gene ID" value="TraesROB_scaffold_093997_01G000100"/>
</dbReference>
<dbReference type="Gramene" id="TraesROB_scaffold_099072_01G000100.1">
    <property type="protein sequence ID" value="TraesROB_scaffold_099072_01G000100.1"/>
    <property type="gene ID" value="TraesROB_scaffold_099072_01G000100"/>
</dbReference>
<dbReference type="Gramene" id="TraesROB_scaffold_100545_01G000200.1">
    <property type="protein sequence ID" value="TraesROB_scaffold_100545_01G000200.1"/>
    <property type="gene ID" value="TraesROB_scaffold_100545_01G000200"/>
</dbReference>
<dbReference type="Gramene" id="TraesROB_scaffold_105169_01G000500.1">
    <property type="protein sequence ID" value="TraesROB_scaffold_105169_01G000500.1"/>
    <property type="gene ID" value="TraesROB_scaffold_105169_01G000500"/>
</dbReference>
<dbReference type="Gramene" id="TraesROB_scaffold_105727_01G000100.1">
    <property type="protein sequence ID" value="TraesROB_scaffold_105727_01G000100.1"/>
    <property type="gene ID" value="TraesROB_scaffold_105727_01G000100"/>
</dbReference>
<dbReference type="Gramene" id="TraesROB_scaffold_108744_01G000200.1">
    <property type="protein sequence ID" value="TraesROB_scaffold_108744_01G000200.1"/>
    <property type="gene ID" value="TraesROB_scaffold_108744_01G000200"/>
</dbReference>
<dbReference type="Gramene" id="TraesROB_scaffold_112811_01G000500.1">
    <property type="protein sequence ID" value="TraesROB_scaffold_112811_01G000500.1"/>
    <property type="gene ID" value="TraesROB_scaffold_112811_01G000500"/>
</dbReference>
<dbReference type="Gramene" id="TraesROB_scaffold_114644_01G000100.1">
    <property type="protein sequence ID" value="TraesROB_scaffold_114644_01G000100.1"/>
    <property type="gene ID" value="TraesROB_scaffold_114644_01G000100"/>
</dbReference>
<dbReference type="Gramene" id="TraesROB_scaffold_115080_01G000100.1">
    <property type="protein sequence ID" value="TraesROB_scaffold_115080_01G000100.1"/>
    <property type="gene ID" value="TraesROB_scaffold_115080_01G000100"/>
</dbReference>
<dbReference type="Gramene" id="TraesROB_scaffold_122116_01G000100.1">
    <property type="protein sequence ID" value="TraesROB_scaffold_122116_01G000100.1"/>
    <property type="gene ID" value="TraesROB_scaffold_122116_01G000100"/>
</dbReference>
<dbReference type="Gramene" id="TraesROB_scaffold_125443_01G000200.1">
    <property type="protein sequence ID" value="TraesROB_scaffold_125443_01G000200.1"/>
    <property type="gene ID" value="TraesROB_scaffold_125443_01G000200"/>
</dbReference>
<dbReference type="Gramene" id="TraesROB_scaffold_125572_01G000100.1">
    <property type="protein sequence ID" value="TraesROB_scaffold_125572_01G000100.1"/>
    <property type="gene ID" value="TraesROB_scaffold_125572_01G000100"/>
</dbReference>
<dbReference type="Gramene" id="TraesROB_scaffold_129751_01G000100.1">
    <property type="protein sequence ID" value="TraesROB_scaffold_129751_01G000100.1"/>
    <property type="gene ID" value="TraesROB_scaffold_129751_01G000100"/>
</dbReference>
<dbReference type="Gramene" id="TraesROB_scaffold_147721_01G000100.1">
    <property type="protein sequence ID" value="TraesROB_scaffold_147721_01G000100.1"/>
    <property type="gene ID" value="TraesROB_scaffold_147721_01G000100"/>
</dbReference>
<dbReference type="Gramene" id="TraesROB_scaffold_159472_01G000200.1">
    <property type="protein sequence ID" value="TraesROB_scaffold_159472_01G000200.1"/>
    <property type="gene ID" value="TraesROB_scaffold_159472_01G000200"/>
</dbReference>
<dbReference type="Gramene" id="TraesROB_scaffold_174971_01G000200.1">
    <property type="protein sequence ID" value="TraesROB_scaffold_174971_01G000200.1"/>
    <property type="gene ID" value="TraesROB_scaffold_174971_01G000200"/>
</dbReference>
<dbReference type="Gramene" id="TraesROB_scaffold_184814_01G000100.1">
    <property type="protein sequence ID" value="TraesROB_scaffold_184814_01G000100.1"/>
    <property type="gene ID" value="TraesROB_scaffold_184814_01G000100"/>
</dbReference>
<dbReference type="Gramene" id="TraesROB_scaffold_186089_01G000100.1">
    <property type="protein sequence ID" value="TraesROB_scaffold_186089_01G000100.1"/>
    <property type="gene ID" value="TraesROB_scaffold_186089_01G000100"/>
</dbReference>
<dbReference type="Gramene" id="TraesROB_scaffold_192334_01G000100.1">
    <property type="protein sequence ID" value="TraesROB_scaffold_192334_01G000100.1"/>
    <property type="gene ID" value="TraesROB_scaffold_192334_01G000100"/>
</dbReference>
<dbReference type="Gramene" id="TraesSTA1A03G00107310.1">
    <property type="protein sequence ID" value="TraesSTA1A03G00107310.1.CDS1"/>
    <property type="gene ID" value="TraesSTA1A03G00107310"/>
</dbReference>
<dbReference type="Gramene" id="TraesSTA1A03G00120290.1">
    <property type="protein sequence ID" value="TraesSTA1A03G00120290.1.CDS1"/>
    <property type="gene ID" value="TraesSTA1A03G00120290"/>
</dbReference>
<dbReference type="Gramene" id="TraesSTA1A03G00124260.1">
    <property type="protein sequence ID" value="TraesSTA1A03G00124260.1.CDS1"/>
    <property type="gene ID" value="TraesSTA1A03G00124260"/>
</dbReference>
<dbReference type="Gramene" id="TraesSTA1A03G00153580.1">
    <property type="protein sequence ID" value="TraesSTA1A03G00153580.1.CDS1"/>
    <property type="gene ID" value="TraesSTA1A03G00153580"/>
</dbReference>
<dbReference type="Gramene" id="TraesSTA1A03G00153720.1">
    <property type="protein sequence ID" value="TraesSTA1A03G00153720.1.CDS1"/>
    <property type="gene ID" value="TraesSTA1A03G00153720"/>
</dbReference>
<dbReference type="Gramene" id="TraesSTA1A03G00154120.1">
    <property type="protein sequence ID" value="TraesSTA1A03G00154120.1.CDS1"/>
    <property type="gene ID" value="TraesSTA1A03G00154120"/>
</dbReference>
<dbReference type="Gramene" id="TraesSTA1B03G00306980.1">
    <property type="protein sequence ID" value="TraesSTA1B03G00306980.1.CDS1"/>
    <property type="gene ID" value="TraesSTA1B03G00306980"/>
</dbReference>
<dbReference type="Gramene" id="TraesSTA1B03G00307010.1">
    <property type="protein sequence ID" value="TraesSTA1B03G00307010.1.CDS1"/>
    <property type="gene ID" value="TraesSTA1B03G00307010"/>
</dbReference>
<dbReference type="Gramene" id="TraesSTA1B03G00323500.1">
    <property type="protein sequence ID" value="TraesSTA1B03G00323500.1.CDS1"/>
    <property type="gene ID" value="TraesSTA1B03G00323500"/>
</dbReference>
<dbReference type="Gramene" id="TraesSTA1B03G00364040.1">
    <property type="protein sequence ID" value="TraesSTA1B03G00364040.1.CDS1"/>
    <property type="gene ID" value="TraesSTA1B03G00364040"/>
</dbReference>
<dbReference type="Gramene" id="TraesSTA1B03G00364520.1">
    <property type="protein sequence ID" value="TraesSTA1B03G00364520.1.CDS1"/>
    <property type="gene ID" value="TraesSTA1B03G00364520"/>
</dbReference>
<dbReference type="Gramene" id="TraesSTA1B03G00365180.1">
    <property type="protein sequence ID" value="TraesSTA1B03G00365180.1.CDS1"/>
    <property type="gene ID" value="TraesSTA1B03G00365180"/>
</dbReference>
<dbReference type="Gramene" id="TraesSTA1B03G00365310.1">
    <property type="protein sequence ID" value="TraesSTA1B03G00365310.1.CDS1"/>
    <property type="gene ID" value="TraesSTA1B03G00365310"/>
</dbReference>
<dbReference type="Gramene" id="TraesSTA1B03G00365360.1">
    <property type="protein sequence ID" value="TraesSTA1B03G00365360.1.CDS1"/>
    <property type="gene ID" value="TraesSTA1B03G00365360"/>
</dbReference>
<dbReference type="Gramene" id="TraesSTA1D03G00501490.1">
    <property type="protein sequence ID" value="TraesSTA1D03G00501490.1.CDS1"/>
    <property type="gene ID" value="TraesSTA1D03G00501490"/>
</dbReference>
<dbReference type="Gramene" id="TraesSTA1D03G00501530.1">
    <property type="protein sequence ID" value="TraesSTA1D03G00501530.1.CDS1"/>
    <property type="gene ID" value="TraesSTA1D03G00501530"/>
</dbReference>
<dbReference type="Gramene" id="TraesSTA1D03G00511580.1">
    <property type="protein sequence ID" value="TraesSTA1D03G00511580.1.CDS1"/>
    <property type="gene ID" value="TraesSTA1D03G00511580"/>
</dbReference>
<dbReference type="Gramene" id="TraesSTA1D03G00516400.1">
    <property type="protein sequence ID" value="TraesSTA1D03G00516400.1.CDS1"/>
    <property type="gene ID" value="TraesSTA1D03G00516400"/>
</dbReference>
<dbReference type="Gramene" id="TraesSTA1D03G00547310.1">
    <property type="protein sequence ID" value="TraesSTA1D03G00547310.1.CDS1"/>
    <property type="gene ID" value="TraesSTA1D03G00547310"/>
</dbReference>
<dbReference type="Gramene" id="TraesSTA1D03G00547860.1">
    <property type="protein sequence ID" value="TraesSTA1D03G00547860.1.CDS1"/>
    <property type="gene ID" value="TraesSTA1D03G00547860"/>
</dbReference>
<dbReference type="Gramene" id="TraesSTA1D03G00547950.1">
    <property type="protein sequence ID" value="TraesSTA1D03G00547950.1.CDS1"/>
    <property type="gene ID" value="TraesSTA1D03G00547950"/>
</dbReference>
<dbReference type="Gramene" id="TraesSTA2A03G00715960.1">
    <property type="protein sequence ID" value="TraesSTA2A03G00715960.1.CDS1"/>
    <property type="gene ID" value="TraesSTA2A03G00715960"/>
</dbReference>
<dbReference type="Gramene" id="TraesSTA2A03G00745080.1">
    <property type="protein sequence ID" value="TraesSTA2A03G00745080.1.CDS1"/>
    <property type="gene ID" value="TraesSTA2A03G00745080"/>
</dbReference>
<dbReference type="Gramene" id="TraesSTA2D03G01191100.1">
    <property type="protein sequence ID" value="TraesSTA2D03G01191100.1.CDS1"/>
    <property type="gene ID" value="TraesSTA2D03G01191100"/>
</dbReference>
<dbReference type="Gramene" id="TraesSTA3A03G01347760.1">
    <property type="protein sequence ID" value="TraesSTA3A03G01347760.1.CDS1"/>
    <property type="gene ID" value="TraesSTA3A03G01347760"/>
</dbReference>
<dbReference type="Gramene" id="TraesSTA3A03G01460080.1">
    <property type="protein sequence ID" value="TraesSTA3A03G01460080.1.CDS1"/>
    <property type="gene ID" value="TraesSTA3A03G01460080"/>
</dbReference>
<dbReference type="Gramene" id="TraesSTA3B03G01590710.1">
    <property type="protein sequence ID" value="TraesSTA3B03G01590710.1.CDS1"/>
    <property type="gene ID" value="TraesSTA3B03G01590710"/>
</dbReference>
<dbReference type="Gramene" id="TraesSTA3B03G01662810.1">
    <property type="protein sequence ID" value="TraesSTA3B03G01662810.1.CDS1"/>
    <property type="gene ID" value="TraesSTA3B03G01662810"/>
</dbReference>
<dbReference type="Gramene" id="TraesSTA3D03G01840460.1">
    <property type="protein sequence ID" value="TraesSTA3D03G01840460.1.CDS1"/>
    <property type="gene ID" value="TraesSTA3D03G01840460"/>
</dbReference>
<dbReference type="Gramene" id="TraesSTA3D03G01932470.1">
    <property type="protein sequence ID" value="TraesSTA3D03G01932470.1.CDS1"/>
    <property type="gene ID" value="TraesSTA3D03G01932470"/>
</dbReference>
<dbReference type="Gramene" id="TraesSTA4A03G02009620.1">
    <property type="protein sequence ID" value="TraesSTA4A03G02009620.1.CDS1"/>
    <property type="gene ID" value="TraesSTA4A03G02009620"/>
</dbReference>
<dbReference type="Gramene" id="TraesSTA4A03G02018980.1">
    <property type="protein sequence ID" value="TraesSTA4A03G02018980.1.CDS1"/>
    <property type="gene ID" value="TraesSTA4A03G02018980"/>
</dbReference>
<dbReference type="Gramene" id="TraesSTA4A03G02174180.1">
    <property type="protein sequence ID" value="TraesSTA4A03G02174180.1.CDS1"/>
    <property type="gene ID" value="TraesSTA4A03G02174180"/>
</dbReference>
<dbReference type="Gramene" id="TraesSTA4A03G02174240.1">
    <property type="protein sequence ID" value="TraesSTA4A03G02174240.1.CDS1"/>
    <property type="gene ID" value="TraesSTA4A03G02174240"/>
</dbReference>
<dbReference type="Gramene" id="TraesSTA4B03G02360750.1">
    <property type="protein sequence ID" value="TraesSTA4B03G02360750.1.CDS1"/>
    <property type="gene ID" value="TraesSTA4B03G02360750"/>
</dbReference>
<dbReference type="Gramene" id="TraesSTA4D03G02520700.1">
    <property type="protein sequence ID" value="TraesSTA4D03G02520700.1.CDS1"/>
    <property type="gene ID" value="TraesSTA4D03G02520700"/>
</dbReference>
<dbReference type="Gramene" id="TraesSTA5B03G02875510.1">
    <property type="protein sequence ID" value="TraesSTA5B03G02875510.1.CDS1"/>
    <property type="gene ID" value="TraesSTA5B03G02875510"/>
</dbReference>
<dbReference type="Gramene" id="TraesSTA5D03G03103640.1">
    <property type="protein sequence ID" value="TraesSTA5D03G03103640.1.CDS1"/>
    <property type="gene ID" value="TraesSTA5D03G03103640"/>
</dbReference>
<dbReference type="Gramene" id="TraesSTA6A03G03244160.1">
    <property type="protein sequence ID" value="TraesSTA6A03G03244160.1.CDS1"/>
    <property type="gene ID" value="TraesSTA6A03G03244160"/>
</dbReference>
<dbReference type="Gramene" id="TraesSTA6A03G03244680.1">
    <property type="protein sequence ID" value="TraesSTA6A03G03244680.1.CDS1"/>
    <property type="gene ID" value="TraesSTA6A03G03244680"/>
</dbReference>
<dbReference type="Gramene" id="TraesSTA6A03G03258560.1">
    <property type="protein sequence ID" value="TraesSTA6A03G03258560.1.CDS1"/>
    <property type="gene ID" value="TraesSTA6A03G03258560"/>
</dbReference>
<dbReference type="Gramene" id="TraesSTA6A03G03283550.1">
    <property type="protein sequence ID" value="TraesSTA6A03G03283550.1.CDS1"/>
    <property type="gene ID" value="TraesSTA6A03G03283550"/>
</dbReference>
<dbReference type="Gramene" id="TraesSTA6B03G03438240.1">
    <property type="protein sequence ID" value="TraesSTA6B03G03438240.1.CDS1"/>
    <property type="gene ID" value="TraesSTA6B03G03438240"/>
</dbReference>
<dbReference type="Gramene" id="TraesSTA6B03G03438480.1">
    <property type="protein sequence ID" value="TraesSTA6B03G03438480.1.CDS1"/>
    <property type="gene ID" value="TraesSTA6B03G03438480"/>
</dbReference>
<dbReference type="Gramene" id="TraesSTA6B03G03439450.1">
    <property type="protein sequence ID" value="TraesSTA6B03G03439450.1.CDS1"/>
    <property type="gene ID" value="TraesSTA6B03G03439450"/>
</dbReference>
<dbReference type="Gramene" id="TraesSTA6D03G03653610.1">
    <property type="protein sequence ID" value="TraesSTA6D03G03653610.1.CDS1"/>
    <property type="gene ID" value="TraesSTA6D03G03653610"/>
</dbReference>
<dbReference type="Gramene" id="TraesSTA6D03G03653610.2">
    <property type="protein sequence ID" value="TraesSTA6D03G03653610.2.CDS1"/>
    <property type="gene ID" value="TraesSTA6D03G03653610"/>
</dbReference>
<dbReference type="Gramene" id="TraesSTA6D03G03654050.1">
    <property type="protein sequence ID" value="TraesSTA6D03G03654050.1.CDS1"/>
    <property type="gene ID" value="TraesSTA6D03G03654050"/>
</dbReference>
<dbReference type="Gramene" id="TraesSTA6D03G03664360.1">
    <property type="protein sequence ID" value="TraesSTA6D03G03664360.1.CDS1"/>
    <property type="gene ID" value="TraesSTA6D03G03664360"/>
</dbReference>
<dbReference type="Gramene" id="TraesSTA6D03G03687180.1">
    <property type="protein sequence ID" value="TraesSTA6D03G03687180.1.CDS1"/>
    <property type="gene ID" value="TraesSTA6D03G03687180"/>
</dbReference>
<dbReference type="Gramene" id="TraesSTA7A03G03829330.1">
    <property type="protein sequence ID" value="TraesSTA7A03G03829330.1.CDS1"/>
    <property type="gene ID" value="TraesSTA7A03G03829330"/>
</dbReference>
<dbReference type="Gramene" id="TraesSTA7A03G03829590.1">
    <property type="protein sequence ID" value="TraesSTA7A03G03829590.1.CDS1"/>
    <property type="gene ID" value="TraesSTA7A03G03829590"/>
</dbReference>
<dbReference type="Gramene" id="TraesSTA7A03G03835780.1">
    <property type="protein sequence ID" value="TraesSTA7A03G03835780.1.CDS1"/>
    <property type="gene ID" value="TraesSTA7A03G03835780"/>
</dbReference>
<dbReference type="Gramene" id="TraesSTA7A03G03835980.1">
    <property type="protein sequence ID" value="TraesSTA7A03G03835980.1.CDS1"/>
    <property type="gene ID" value="TraesSTA7A03G03835980"/>
</dbReference>
<dbReference type="Gramene" id="TraesSTA7A03G03836010.1">
    <property type="protein sequence ID" value="TraesSTA7A03G03836010.1.CDS1"/>
    <property type="gene ID" value="TraesSTA7A03G03836010"/>
</dbReference>
<dbReference type="Gramene" id="TraesSTA7A03G03836060.1">
    <property type="protein sequence ID" value="TraesSTA7A03G03836060.1.CDS1"/>
    <property type="gene ID" value="TraesSTA7A03G03836060"/>
</dbReference>
<dbReference type="Gramene" id="TraesSTA7B03G04041620.1">
    <property type="protein sequence ID" value="TraesSTA7B03G04041620.1.CDS1"/>
    <property type="gene ID" value="TraesSTA7B03G04041620"/>
</dbReference>
<dbReference type="Gramene" id="TraesSTA7B03G04042070.1">
    <property type="protein sequence ID" value="TraesSTA7B03G04042070.1.CDS1"/>
    <property type="gene ID" value="TraesSTA7B03G04042070"/>
</dbReference>
<dbReference type="Gramene" id="TraesSTA7B03G04042140.1">
    <property type="protein sequence ID" value="TraesSTA7B03G04042140.1.CDS1"/>
    <property type="gene ID" value="TraesSTA7B03G04042140"/>
</dbReference>
<dbReference type="Gramene" id="TraesSTA7B03G04042460.1">
    <property type="protein sequence ID" value="TraesSTA7B03G04042460.1.CDS1"/>
    <property type="gene ID" value="TraesSTA7B03G04042460"/>
</dbReference>
<dbReference type="Gramene" id="TraesSTA7B03G04042560.1">
    <property type="protein sequence ID" value="TraesSTA7B03G04042560.1.CDS1"/>
    <property type="gene ID" value="TraesSTA7B03G04042560"/>
</dbReference>
<dbReference type="Gramene" id="TraesSTA7B03G04042590.1">
    <property type="protein sequence ID" value="TraesSTA7B03G04042590.1.CDS1"/>
    <property type="gene ID" value="TraesSTA7B03G04042590"/>
</dbReference>
<dbReference type="Gramene" id="TraesSTA7B03G04042690.1">
    <property type="protein sequence ID" value="TraesSTA7B03G04042690.1.CDS1"/>
    <property type="gene ID" value="TraesSTA7B03G04042690"/>
</dbReference>
<dbReference type="Gramene" id="TraesSTA7B03G04043190.1">
    <property type="protein sequence ID" value="TraesSTA7B03G04043190.1.CDS1"/>
    <property type="gene ID" value="TraesSTA7B03G04043190"/>
</dbReference>
<dbReference type="Gramene" id="TraesSTA7D03G04297190.1">
    <property type="protein sequence ID" value="TraesSTA7D03G04297190.1.CDS1"/>
    <property type="gene ID" value="TraesSTA7D03G04297190"/>
</dbReference>
<dbReference type="Gramene" id="TraesSTA7D03G04297300.1">
    <property type="protein sequence ID" value="TraesSTA7D03G04297300.1.CDS1"/>
    <property type="gene ID" value="TraesSTA7D03G04297300"/>
</dbReference>
<dbReference type="Gramene" id="TraesSTA7D03G04303110.1">
    <property type="protein sequence ID" value="TraesSTA7D03G04303110.1.CDS1"/>
    <property type="gene ID" value="TraesSTA7D03G04303110"/>
</dbReference>
<dbReference type="Gramene" id="TraesSTA7D03G04303430.1">
    <property type="protein sequence ID" value="TraesSTA7D03G04303430.1.CDS1"/>
    <property type="gene ID" value="TraesSTA7D03G04303430"/>
</dbReference>
<dbReference type="Gramene" id="TraesSTA7D03G04303450.1">
    <property type="protein sequence ID" value="TraesSTA7D03G04303450.1.CDS1"/>
    <property type="gene ID" value="TraesSTA7D03G04303450"/>
</dbReference>
<dbReference type="Gramene" id="TraesSTA7D03G04312560.1">
    <property type="protein sequence ID" value="TraesSTA7D03G04312560.1.CDS1"/>
    <property type="gene ID" value="TraesSTA7D03G04312560"/>
</dbReference>
<dbReference type="Gramene" id="TraesSYM1A03G00109890.1">
    <property type="protein sequence ID" value="TraesSYM1A03G00109890.1.CDS1"/>
    <property type="gene ID" value="TraesSYM1A03G00109890"/>
</dbReference>
<dbReference type="Gramene" id="TraesSYM1A03G00122960.1">
    <property type="protein sequence ID" value="TraesSYM1A03G00122960.1.CDS1"/>
    <property type="gene ID" value="TraesSYM1A03G00122960"/>
</dbReference>
<dbReference type="Gramene" id="TraesSYM1A03G00127060.1">
    <property type="protein sequence ID" value="TraesSYM1A03G00127060.1.CDS1"/>
    <property type="gene ID" value="TraesSYM1A03G00127060"/>
</dbReference>
<dbReference type="Gramene" id="TraesSYM1A03G00156700.1">
    <property type="protein sequence ID" value="TraesSYM1A03G00156700.1.CDS1"/>
    <property type="gene ID" value="TraesSYM1A03G00156700"/>
</dbReference>
<dbReference type="Gramene" id="TraesSYM1A03G00156820.1">
    <property type="protein sequence ID" value="TraesSYM1A03G00156820.1.CDS1"/>
    <property type="gene ID" value="TraesSYM1A03G00156820"/>
</dbReference>
<dbReference type="Gramene" id="TraesSYM1A03G00157250.1">
    <property type="protein sequence ID" value="TraesSYM1A03G00157250.1.CDS1"/>
    <property type="gene ID" value="TraesSYM1A03G00157250"/>
</dbReference>
<dbReference type="Gramene" id="TraesSYM1B03G00315320.1">
    <property type="protein sequence ID" value="TraesSYM1B03G00315320.1.CDS1"/>
    <property type="gene ID" value="TraesSYM1B03G00315320"/>
</dbReference>
<dbReference type="Gramene" id="TraesSYM1B03G00315350.1">
    <property type="protein sequence ID" value="TraesSYM1B03G00315350.1.CDS1"/>
    <property type="gene ID" value="TraesSYM1B03G00315350"/>
</dbReference>
<dbReference type="Gramene" id="TraesSYM1B03G00331750.1">
    <property type="protein sequence ID" value="TraesSYM1B03G00331750.1.CDS1"/>
    <property type="gene ID" value="TraesSYM1B03G00331750"/>
</dbReference>
<dbReference type="Gramene" id="TraesSYM1B03G00371650.1">
    <property type="protein sequence ID" value="TraesSYM1B03G00371650.1.CDS1"/>
    <property type="gene ID" value="TraesSYM1B03G00371650"/>
</dbReference>
<dbReference type="Gramene" id="TraesSYM1B03G00371650.2">
    <property type="protein sequence ID" value="TraesSYM1B03G00371650.2.CDS1"/>
    <property type="gene ID" value="TraesSYM1B03G00371650"/>
</dbReference>
<dbReference type="Gramene" id="TraesSYM1B03G00372160.1">
    <property type="protein sequence ID" value="TraesSYM1B03G00372160.1.CDS1"/>
    <property type="gene ID" value="TraesSYM1B03G00372160"/>
</dbReference>
<dbReference type="Gramene" id="TraesSYM1B03G00372820.1">
    <property type="protein sequence ID" value="TraesSYM1B03G00372820.1.CDS1"/>
    <property type="gene ID" value="TraesSYM1B03G00372820"/>
</dbReference>
<dbReference type="Gramene" id="TraesSYM1B03G00372960.1">
    <property type="protein sequence ID" value="TraesSYM1B03G00372960.1.CDS1"/>
    <property type="gene ID" value="TraesSYM1B03G00372960"/>
</dbReference>
<dbReference type="Gramene" id="TraesSYM1B03G00373000.1">
    <property type="protein sequence ID" value="TraesSYM1B03G00373000.1.CDS1"/>
    <property type="gene ID" value="TraesSYM1B03G00373000"/>
</dbReference>
<dbReference type="Gramene" id="TraesSYM1B03G00373000.2">
    <property type="protein sequence ID" value="TraesSYM1B03G00373000.2.CDS1"/>
    <property type="gene ID" value="TraesSYM1B03G00373000"/>
</dbReference>
<dbReference type="Gramene" id="TraesSYM1D03G00509620.1">
    <property type="protein sequence ID" value="TraesSYM1D03G00509620.1.CDS1"/>
    <property type="gene ID" value="TraesSYM1D03G00509620"/>
</dbReference>
<dbReference type="Gramene" id="TraesSYM1D03G00509670.1">
    <property type="protein sequence ID" value="TraesSYM1D03G00509670.1.CDS1"/>
    <property type="gene ID" value="TraesSYM1D03G00509670"/>
</dbReference>
<dbReference type="Gramene" id="TraesSYM1D03G00519890.1">
    <property type="protein sequence ID" value="TraesSYM1D03G00519890.1.CDS1"/>
    <property type="gene ID" value="TraesSYM1D03G00519890"/>
</dbReference>
<dbReference type="Gramene" id="TraesSYM1D03G00524560.1">
    <property type="protein sequence ID" value="TraesSYM1D03G00524560.1.CDS1"/>
    <property type="gene ID" value="TraesSYM1D03G00524560"/>
</dbReference>
<dbReference type="Gramene" id="TraesSYM1D03G00555690.1">
    <property type="protein sequence ID" value="TraesSYM1D03G00555690.1.CDS1"/>
    <property type="gene ID" value="TraesSYM1D03G00555690"/>
</dbReference>
<dbReference type="Gramene" id="TraesSYM1D03G00555770.1">
    <property type="protein sequence ID" value="TraesSYM1D03G00555770.1.CDS1"/>
    <property type="gene ID" value="TraesSYM1D03G00555770"/>
</dbReference>
<dbReference type="Gramene" id="TraesSYM1D03G00556300.1">
    <property type="protein sequence ID" value="TraesSYM1D03G00556300.1.CDS1"/>
    <property type="gene ID" value="TraesSYM1D03G00556300"/>
</dbReference>
<dbReference type="Gramene" id="TraesSYM1D03G00556380.1">
    <property type="protein sequence ID" value="TraesSYM1D03G00556380.1.CDS1"/>
    <property type="gene ID" value="TraesSYM1D03G00556380"/>
</dbReference>
<dbReference type="Gramene" id="TraesSYM2A03G00724730.1">
    <property type="protein sequence ID" value="TraesSYM2A03G00724730.1.CDS1"/>
    <property type="gene ID" value="TraesSYM2A03G00724730"/>
</dbReference>
<dbReference type="Gramene" id="TraesSYM2A03G00754570.1">
    <property type="protein sequence ID" value="TraesSYM2A03G00754570.1.CDS1"/>
    <property type="gene ID" value="TraesSYM2A03G00754570"/>
</dbReference>
<dbReference type="Gramene" id="TraesSYM2B03G00974220.1">
    <property type="protein sequence ID" value="TraesSYM2B03G00974220.1.CDS1"/>
    <property type="gene ID" value="TraesSYM2B03G00974220"/>
</dbReference>
<dbReference type="Gramene" id="TraesSYM2D03G01217370.1">
    <property type="protein sequence ID" value="TraesSYM2D03G01217370.1.CDS1"/>
    <property type="gene ID" value="TraesSYM2D03G01217370"/>
</dbReference>
<dbReference type="Gramene" id="TraesSYM3A03G01377750.1">
    <property type="protein sequence ID" value="TraesSYM3A03G01377750.1.CDS1"/>
    <property type="gene ID" value="TraesSYM3A03G01377750"/>
</dbReference>
<dbReference type="Gramene" id="TraesSYM3B03G01621750.1">
    <property type="protein sequence ID" value="TraesSYM3B03G01621750.1.CDS1"/>
    <property type="gene ID" value="TraesSYM3B03G01621750"/>
</dbReference>
<dbReference type="Gramene" id="TraesSYM3B03G01694050.1">
    <property type="protein sequence ID" value="TraesSYM3B03G01694050.1.CDS1"/>
    <property type="gene ID" value="TraesSYM3B03G01694050"/>
</dbReference>
<dbReference type="Gramene" id="TraesSYM3D03G01868430.1">
    <property type="protein sequence ID" value="TraesSYM3D03G01868430.1.CDS1"/>
    <property type="gene ID" value="TraesSYM3D03G01868430"/>
</dbReference>
<dbReference type="Gramene" id="TraesSYM3D03G01967370.1">
    <property type="protein sequence ID" value="TraesSYM3D03G01967370.1.CDS1"/>
    <property type="gene ID" value="TraesSYM3D03G01967370"/>
</dbReference>
<dbReference type="Gramene" id="TraesSYM4A03G02039220.1">
    <property type="protein sequence ID" value="TraesSYM4A03G02039220.1.CDS1"/>
    <property type="gene ID" value="TraesSYM4A03G02039220"/>
</dbReference>
<dbReference type="Gramene" id="TraesSYM4A03G02048700.1">
    <property type="protein sequence ID" value="TraesSYM4A03G02048700.1.CDS1"/>
    <property type="gene ID" value="TraesSYM4A03G02048700"/>
</dbReference>
<dbReference type="Gramene" id="TraesSYM4A03G02204490.1">
    <property type="protein sequence ID" value="TraesSYM4A03G02204490.1.CDS1"/>
    <property type="gene ID" value="TraesSYM4A03G02204490"/>
</dbReference>
<dbReference type="Gramene" id="TraesSYM4A03G02204530.1">
    <property type="protein sequence ID" value="TraesSYM4A03G02204530.1.CDS1"/>
    <property type="gene ID" value="TraesSYM4A03G02204530"/>
</dbReference>
<dbReference type="Gramene" id="TraesSYM4B03G02393170.1">
    <property type="protein sequence ID" value="TraesSYM4B03G02393170.1.CDS1"/>
    <property type="gene ID" value="TraesSYM4B03G02393170"/>
</dbReference>
<dbReference type="Gramene" id="TraesSYM4D03G02553580.1">
    <property type="protein sequence ID" value="TraesSYM4D03G02553580.1.CDS1"/>
    <property type="gene ID" value="TraesSYM4D03G02553580"/>
</dbReference>
<dbReference type="Gramene" id="TraesSYM4D03G02563460.1">
    <property type="protein sequence ID" value="TraesSYM4D03G02563460.1.CDS1"/>
    <property type="gene ID" value="TraesSYM4D03G02563460"/>
</dbReference>
<dbReference type="Gramene" id="TraesSYM5B03G02943930.1">
    <property type="protein sequence ID" value="TraesSYM5B03G02943930.1.CDS1"/>
    <property type="gene ID" value="TraesSYM5B03G02943930"/>
</dbReference>
<dbReference type="Gramene" id="TraesSYM5B03G02954910.1">
    <property type="protein sequence ID" value="TraesSYM5B03G02954910.1.CDS1"/>
    <property type="gene ID" value="TraesSYM5B03G02954910"/>
</dbReference>
<dbReference type="Gramene" id="TraesSYM5B03G02955640.1">
    <property type="protein sequence ID" value="TraesSYM5B03G02955640.1.CDS1"/>
    <property type="gene ID" value="TraesSYM5B03G02955640"/>
</dbReference>
<dbReference type="Gramene" id="TraesSYM5B03G02955730.1">
    <property type="protein sequence ID" value="TraesSYM5B03G02955730.1.CDS1"/>
    <property type="gene ID" value="TraesSYM5B03G02955730"/>
</dbReference>
<dbReference type="Gramene" id="TraesSYM5B03G02955750.1">
    <property type="protein sequence ID" value="TraesSYM5B03G02955750.1.CDS1"/>
    <property type="gene ID" value="TraesSYM5B03G02955750"/>
</dbReference>
<dbReference type="Gramene" id="TraesSYM5B03G02955870.1">
    <property type="protein sequence ID" value="TraesSYM5B03G02955870.1.CDS1"/>
    <property type="gene ID" value="TraesSYM5B03G02955870"/>
</dbReference>
<dbReference type="Gramene" id="TraesSYM5B03G02956180.1">
    <property type="protein sequence ID" value="TraesSYM5B03G02956180.1.CDS1"/>
    <property type="gene ID" value="TraesSYM5B03G02956180"/>
</dbReference>
<dbReference type="Gramene" id="TraesSYM5B03G02956250.1">
    <property type="protein sequence ID" value="TraesSYM5B03G02956250.1.CDS1"/>
    <property type="gene ID" value="TraesSYM5B03G02956250"/>
</dbReference>
<dbReference type="Gramene" id="TraesSYM5B03G02956710.1">
    <property type="protein sequence ID" value="TraesSYM5B03G02956710.1.CDS1"/>
    <property type="gene ID" value="TraesSYM5B03G02956710"/>
</dbReference>
<dbReference type="Gramene" id="TraesSYM5D03G03052730.1">
    <property type="protein sequence ID" value="TraesSYM5D03G03052730.1.CDS1"/>
    <property type="gene ID" value="TraesSYM5D03G03052730"/>
</dbReference>
<dbReference type="Gramene" id="TraesSYM6A03G03194270.1">
    <property type="protein sequence ID" value="TraesSYM6A03G03194270.1.CDS1"/>
    <property type="gene ID" value="TraesSYM6A03G03194270"/>
</dbReference>
<dbReference type="Gramene" id="TraesSYM6A03G03194810.1">
    <property type="protein sequence ID" value="TraesSYM6A03G03194810.1.CDS1"/>
    <property type="gene ID" value="TraesSYM6A03G03194810"/>
</dbReference>
<dbReference type="Gramene" id="TraesSYM6A03G03208570.1">
    <property type="protein sequence ID" value="TraesSYM6A03G03208570.1.CDS1"/>
    <property type="gene ID" value="TraesSYM6A03G03208570"/>
</dbReference>
<dbReference type="Gramene" id="TraesSYM6A03G03233600.1">
    <property type="protein sequence ID" value="TraesSYM6A03G03233600.1.CDS1"/>
    <property type="gene ID" value="TraesSYM6A03G03233600"/>
</dbReference>
<dbReference type="Gramene" id="TraesSYM6B03G03389270.1">
    <property type="protein sequence ID" value="TraesSYM6B03G03389270.1.CDS1"/>
    <property type="gene ID" value="TraesSYM6B03G03389270"/>
</dbReference>
<dbReference type="Gramene" id="TraesSYM6B03G03389270.2">
    <property type="protein sequence ID" value="TraesSYM6B03G03389270.2.CDS1"/>
    <property type="gene ID" value="TraesSYM6B03G03389270"/>
</dbReference>
<dbReference type="Gramene" id="TraesSYM6B03G03389560.1">
    <property type="protein sequence ID" value="TraesSYM6B03G03389560.1.CDS1"/>
    <property type="gene ID" value="TraesSYM6B03G03389560"/>
</dbReference>
<dbReference type="Gramene" id="TraesSYM6B03G03390540.1">
    <property type="protein sequence ID" value="TraesSYM6B03G03390540.1.CDS1"/>
    <property type="gene ID" value="TraesSYM6B03G03390540"/>
</dbReference>
<dbReference type="Gramene" id="TraesSYM6D03G03617330.1">
    <property type="protein sequence ID" value="TraesSYM6D03G03617330.1.CDS1"/>
    <property type="gene ID" value="TraesSYM6D03G03617330"/>
</dbReference>
<dbReference type="Gramene" id="TraesSYM6D03G03640230.1">
    <property type="protein sequence ID" value="TraesSYM6D03G03640230.1.CDS1"/>
    <property type="gene ID" value="TraesSYM6D03G03640230"/>
</dbReference>
<dbReference type="Gramene" id="TraesSYM7A03G03785210.1">
    <property type="protein sequence ID" value="TraesSYM7A03G03785210.1.CDS1"/>
    <property type="gene ID" value="TraesSYM7A03G03785210"/>
</dbReference>
<dbReference type="Gramene" id="TraesSYM7A03G03785490.1">
    <property type="protein sequence ID" value="TraesSYM7A03G03785490.1.CDS1"/>
    <property type="gene ID" value="TraesSYM7A03G03785490"/>
</dbReference>
<dbReference type="Gramene" id="TraesSYM7A03G03791820.1">
    <property type="protein sequence ID" value="TraesSYM7A03G03791820.1.CDS1"/>
    <property type="gene ID" value="TraesSYM7A03G03791820"/>
</dbReference>
<dbReference type="Gramene" id="TraesSYM7A03G03792050.1">
    <property type="protein sequence ID" value="TraesSYM7A03G03792050.1.CDS1"/>
    <property type="gene ID" value="TraesSYM7A03G03792050"/>
</dbReference>
<dbReference type="Gramene" id="TraesSYM7A03G03792100.1">
    <property type="protein sequence ID" value="TraesSYM7A03G03792100.1.CDS1"/>
    <property type="gene ID" value="TraesSYM7A03G03792100"/>
</dbReference>
<dbReference type="Gramene" id="TraesSYM7A03G03792170.1">
    <property type="protein sequence ID" value="TraesSYM7A03G03792170.1.CDS1"/>
    <property type="gene ID" value="TraesSYM7A03G03792170"/>
</dbReference>
<dbReference type="Gramene" id="TraesSYM7B03G04137340.1">
    <property type="protein sequence ID" value="TraesSYM7B03G04137340.1.CDS1"/>
    <property type="gene ID" value="TraesSYM7B03G04137340"/>
</dbReference>
<dbReference type="Gramene" id="TraesSYM7D03G04356300.1">
    <property type="protein sequence ID" value="TraesSYM7D03G04356300.1.CDS1"/>
    <property type="gene ID" value="TraesSYM7D03G04356300"/>
</dbReference>
<dbReference type="Gramene" id="TraesSYM7D03G04356420.1">
    <property type="protein sequence ID" value="TraesSYM7D03G04356420.1.CDS1"/>
    <property type="gene ID" value="TraesSYM7D03G04356420"/>
</dbReference>
<dbReference type="Gramene" id="TraesSYM7D03G04362720.1">
    <property type="protein sequence ID" value="TraesSYM7D03G04362720.1.CDS1"/>
    <property type="gene ID" value="TraesSYM7D03G04362720"/>
</dbReference>
<dbReference type="Gramene" id="TraesSYM7D03G04362760.1">
    <property type="protein sequence ID" value="TraesSYM7D03G04362760.1.CDS1"/>
    <property type="gene ID" value="TraesSYM7D03G04362760"/>
</dbReference>
<dbReference type="Gramene" id="TraesSYM7D03G04371750.1">
    <property type="protein sequence ID" value="TraesSYM7D03G04371750.1.CDS1"/>
    <property type="gene ID" value="TraesSYM7D03G04371750"/>
</dbReference>
<dbReference type="Gramene" id="TraesWEE_scaffold_003642_01G000200.1">
    <property type="protein sequence ID" value="TraesWEE_scaffold_003642_01G000200.1"/>
    <property type="gene ID" value="TraesWEE_scaffold_003642_01G000200"/>
</dbReference>
<dbReference type="Gramene" id="TraesWEE_scaffold_003757_01G000100.1">
    <property type="protein sequence ID" value="TraesWEE_scaffold_003757_01G000100.1"/>
    <property type="gene ID" value="TraesWEE_scaffold_003757_01G000100"/>
</dbReference>
<dbReference type="Gramene" id="TraesWEE_scaffold_003757_01G000300.1">
    <property type="protein sequence ID" value="TraesWEE_scaffold_003757_01G000300.1"/>
    <property type="gene ID" value="TraesWEE_scaffold_003757_01G000300"/>
</dbReference>
<dbReference type="Gramene" id="TraesWEE_scaffold_004406_01G000100.1">
    <property type="protein sequence ID" value="TraesWEE_scaffold_004406_01G000100.1"/>
    <property type="gene ID" value="TraesWEE_scaffold_004406_01G000100"/>
</dbReference>
<dbReference type="Gramene" id="TraesWEE_scaffold_006317_01G000400.1">
    <property type="protein sequence ID" value="TraesWEE_scaffold_006317_01G000400.1"/>
    <property type="gene ID" value="TraesWEE_scaffold_006317_01G000400"/>
</dbReference>
<dbReference type="Gramene" id="TraesWEE_scaffold_006317_01G000600.1">
    <property type="protein sequence ID" value="TraesWEE_scaffold_006317_01G000600.1"/>
    <property type="gene ID" value="TraesWEE_scaffold_006317_01G000600"/>
</dbReference>
<dbReference type="Gramene" id="TraesWEE_scaffold_006317_01G000800.1">
    <property type="protein sequence ID" value="TraesWEE_scaffold_006317_01G000800.1"/>
    <property type="gene ID" value="TraesWEE_scaffold_006317_01G000800"/>
</dbReference>
<dbReference type="Gramene" id="TraesWEE_scaffold_007488_01G000200.1">
    <property type="protein sequence ID" value="TraesWEE_scaffold_007488_01G000200.1"/>
    <property type="gene ID" value="TraesWEE_scaffold_007488_01G000200"/>
</dbReference>
<dbReference type="Gramene" id="TraesWEE_scaffold_008507_01G000900.1">
    <property type="protein sequence ID" value="TraesWEE_scaffold_008507_01G000900.1"/>
    <property type="gene ID" value="TraesWEE_scaffold_008507_01G000900"/>
</dbReference>
<dbReference type="Gramene" id="TraesWEE_scaffold_008507_01G001400.1">
    <property type="protein sequence ID" value="TraesWEE_scaffold_008507_01G001400.1"/>
    <property type="gene ID" value="TraesWEE_scaffold_008507_01G001400"/>
</dbReference>
<dbReference type="Gramene" id="TraesWEE_scaffold_008507_01G001600.1">
    <property type="protein sequence ID" value="TraesWEE_scaffold_008507_01G001600.1"/>
    <property type="gene ID" value="TraesWEE_scaffold_008507_01G001600"/>
</dbReference>
<dbReference type="Gramene" id="TraesWEE_scaffold_008923_01G000300.1">
    <property type="protein sequence ID" value="TraesWEE_scaffold_008923_01G000300.1"/>
    <property type="gene ID" value="TraesWEE_scaffold_008923_01G000300"/>
</dbReference>
<dbReference type="Gramene" id="TraesWEE_scaffold_008996_01G000200.1">
    <property type="protein sequence ID" value="TraesWEE_scaffold_008996_01G000200.1"/>
    <property type="gene ID" value="TraesWEE_scaffold_008996_01G000200"/>
</dbReference>
<dbReference type="Gramene" id="TraesWEE_scaffold_011000_01G000200.1">
    <property type="protein sequence ID" value="TraesWEE_scaffold_011000_01G000200.1"/>
    <property type="gene ID" value="TraesWEE_scaffold_011000_01G000200"/>
</dbReference>
<dbReference type="Gramene" id="TraesWEE_scaffold_014927_01G000200.1">
    <property type="protein sequence ID" value="TraesWEE_scaffold_014927_01G000200.1"/>
    <property type="gene ID" value="TraesWEE_scaffold_014927_01G000200"/>
</dbReference>
<dbReference type="Gramene" id="TraesWEE_scaffold_015928_01G000100.1">
    <property type="protein sequence ID" value="TraesWEE_scaffold_015928_01G000100.1"/>
    <property type="gene ID" value="TraesWEE_scaffold_015928_01G000100"/>
</dbReference>
<dbReference type="Gramene" id="TraesWEE_scaffold_016974_01G000100.1">
    <property type="protein sequence ID" value="TraesWEE_scaffold_016974_01G000100.1"/>
    <property type="gene ID" value="TraesWEE_scaffold_016974_01G000100"/>
</dbReference>
<dbReference type="Gramene" id="TraesWEE_scaffold_030568_01G000100.1">
    <property type="protein sequence ID" value="TraesWEE_scaffold_030568_01G000100.1"/>
    <property type="gene ID" value="TraesWEE_scaffold_030568_01G000100"/>
</dbReference>
<dbReference type="Gramene" id="TraesWEE_scaffold_030869_01G000100.1">
    <property type="protein sequence ID" value="TraesWEE_scaffold_030869_01G000100.1"/>
    <property type="gene ID" value="TraesWEE_scaffold_030869_01G000100"/>
</dbReference>
<dbReference type="Gramene" id="TraesWEE_scaffold_031270_01G000700.1">
    <property type="protein sequence ID" value="TraesWEE_scaffold_031270_01G000700.1"/>
    <property type="gene ID" value="TraesWEE_scaffold_031270_01G000700"/>
</dbReference>
<dbReference type="Gramene" id="TraesWEE_scaffold_031654_01G000100.1">
    <property type="protein sequence ID" value="TraesWEE_scaffold_031654_01G000100.1"/>
    <property type="gene ID" value="TraesWEE_scaffold_031654_01G000100"/>
</dbReference>
<dbReference type="Gramene" id="TraesWEE_scaffold_032945_01G000400.1">
    <property type="protein sequence ID" value="TraesWEE_scaffold_032945_01G000400.1"/>
    <property type="gene ID" value="TraesWEE_scaffold_032945_01G000400"/>
</dbReference>
<dbReference type="Gramene" id="TraesWEE_scaffold_033003_01G000400.1">
    <property type="protein sequence ID" value="TraesWEE_scaffold_033003_01G000400.1"/>
    <property type="gene ID" value="TraesWEE_scaffold_033003_01G000400"/>
</dbReference>
<dbReference type="Gramene" id="TraesWEE_scaffold_036046_01G000200.1">
    <property type="protein sequence ID" value="TraesWEE_scaffold_036046_01G000200.1"/>
    <property type="gene ID" value="TraesWEE_scaffold_036046_01G000200"/>
</dbReference>
<dbReference type="Gramene" id="TraesWEE_scaffold_042260_01G000100.1">
    <property type="protein sequence ID" value="TraesWEE_scaffold_042260_01G000100.1"/>
    <property type="gene ID" value="TraesWEE_scaffold_042260_01G000100"/>
</dbReference>
<dbReference type="Gramene" id="TraesWEE_scaffold_043343_01G000400.1">
    <property type="protein sequence ID" value="TraesWEE_scaffold_043343_01G000400.1"/>
    <property type="gene ID" value="TraesWEE_scaffold_043343_01G000400"/>
</dbReference>
<dbReference type="Gramene" id="TraesWEE_scaffold_047855_01G000200.1">
    <property type="protein sequence ID" value="TraesWEE_scaffold_047855_01G000200.1"/>
    <property type="gene ID" value="TraesWEE_scaffold_047855_01G000200"/>
</dbReference>
<dbReference type="Gramene" id="TraesWEE_scaffold_052273_01G000100.1">
    <property type="protein sequence ID" value="TraesWEE_scaffold_052273_01G000100.1"/>
    <property type="gene ID" value="TraesWEE_scaffold_052273_01G000100"/>
</dbReference>
<dbReference type="Gramene" id="TraesWEE_scaffold_054094_01G000400.1">
    <property type="protein sequence ID" value="TraesWEE_scaffold_054094_01G000400.1"/>
    <property type="gene ID" value="TraesWEE_scaffold_054094_01G000400"/>
</dbReference>
<dbReference type="Gramene" id="TraesWEE_scaffold_057264_01G000200.1">
    <property type="protein sequence ID" value="TraesWEE_scaffold_057264_01G000200.1"/>
    <property type="gene ID" value="TraesWEE_scaffold_057264_01G000200"/>
</dbReference>
<dbReference type="Gramene" id="TraesWEE_scaffold_058045_01G000300.1">
    <property type="protein sequence ID" value="TraesWEE_scaffold_058045_01G000300.1"/>
    <property type="gene ID" value="TraesWEE_scaffold_058045_01G000300"/>
</dbReference>
<dbReference type="Gramene" id="TraesWEE_scaffold_058567_01G000200.1">
    <property type="protein sequence ID" value="TraesWEE_scaffold_058567_01G000200.1"/>
    <property type="gene ID" value="TraesWEE_scaffold_058567_01G000200"/>
</dbReference>
<dbReference type="Gramene" id="TraesWEE_scaffold_060191_01G000100.1">
    <property type="protein sequence ID" value="TraesWEE_scaffold_060191_01G000100.1"/>
    <property type="gene ID" value="TraesWEE_scaffold_060191_01G000100"/>
</dbReference>
<dbReference type="Gramene" id="TraesWEE_scaffold_063197_01G000300.1">
    <property type="protein sequence ID" value="TraesWEE_scaffold_063197_01G000300.1"/>
    <property type="gene ID" value="TraesWEE_scaffold_063197_01G000300"/>
</dbReference>
<dbReference type="Gramene" id="TraesWEE_scaffold_064306_01G000100.1">
    <property type="protein sequence ID" value="TraesWEE_scaffold_064306_01G000100.1"/>
    <property type="gene ID" value="TraesWEE_scaffold_064306_01G000100"/>
</dbReference>
<dbReference type="Gramene" id="TraesWEE_scaffold_068030_01G000100.1">
    <property type="protein sequence ID" value="TraesWEE_scaffold_068030_01G000100.1"/>
    <property type="gene ID" value="TraesWEE_scaffold_068030_01G000100"/>
</dbReference>
<dbReference type="Gramene" id="TraesWEE_scaffold_069453_01G000100.1">
    <property type="protein sequence ID" value="TraesWEE_scaffold_069453_01G000100.1"/>
    <property type="gene ID" value="TraesWEE_scaffold_069453_01G000100"/>
</dbReference>
<dbReference type="Gramene" id="TraesWEE_scaffold_069556_01G000100.1">
    <property type="protein sequence ID" value="TraesWEE_scaffold_069556_01G000100.1"/>
    <property type="gene ID" value="TraesWEE_scaffold_069556_01G000100"/>
</dbReference>
<dbReference type="Gramene" id="TraesWEE_scaffold_069556_01G000300.1">
    <property type="protein sequence ID" value="TraesWEE_scaffold_069556_01G000300.1"/>
    <property type="gene ID" value="TraesWEE_scaffold_069556_01G000300"/>
</dbReference>
<dbReference type="Gramene" id="TraesWEE_scaffold_072301_01G000100.1">
    <property type="protein sequence ID" value="TraesWEE_scaffold_072301_01G000100.1"/>
    <property type="gene ID" value="TraesWEE_scaffold_072301_01G000100"/>
</dbReference>
<dbReference type="Gramene" id="TraesWEE_scaffold_073686_01G000200.1">
    <property type="protein sequence ID" value="TraesWEE_scaffold_073686_01G000200.1"/>
    <property type="gene ID" value="TraesWEE_scaffold_073686_01G000200"/>
</dbReference>
<dbReference type="Gramene" id="TraesWEE_scaffold_078687_01G000100.1">
    <property type="protein sequence ID" value="TraesWEE_scaffold_078687_01G000100.1"/>
    <property type="gene ID" value="TraesWEE_scaffold_078687_01G000100"/>
</dbReference>
<dbReference type="Gramene" id="TraesWEE_scaffold_079673_01G000100.1">
    <property type="protein sequence ID" value="TraesWEE_scaffold_079673_01G000100.1"/>
    <property type="gene ID" value="TraesWEE_scaffold_079673_01G000100"/>
</dbReference>
<dbReference type="Gramene" id="TraesWEE_scaffold_080614_01G000300.1">
    <property type="protein sequence ID" value="TraesWEE_scaffold_080614_01G000300.1"/>
    <property type="gene ID" value="TraesWEE_scaffold_080614_01G000300"/>
</dbReference>
<dbReference type="Gramene" id="TraesWEE_scaffold_082614_01G000100.1">
    <property type="protein sequence ID" value="TraesWEE_scaffold_082614_01G000100.1"/>
    <property type="gene ID" value="TraesWEE_scaffold_082614_01G000100"/>
</dbReference>
<dbReference type="Gramene" id="TraesWEE_scaffold_085513_01G000200.1">
    <property type="protein sequence ID" value="TraesWEE_scaffold_085513_01G000200.1"/>
    <property type="gene ID" value="TraesWEE_scaffold_085513_01G000200"/>
</dbReference>
<dbReference type="Gramene" id="TraesWEE_scaffold_094012_01G000200.1">
    <property type="protein sequence ID" value="TraesWEE_scaffold_094012_01G000200.1"/>
    <property type="gene ID" value="TraesWEE_scaffold_094012_01G000200"/>
</dbReference>
<dbReference type="Gramene" id="TraesWEE_scaffold_107348_01G000100.1">
    <property type="protein sequence ID" value="TraesWEE_scaffold_107348_01G000100.1"/>
    <property type="gene ID" value="TraesWEE_scaffold_107348_01G000100"/>
</dbReference>
<dbReference type="Gramene" id="TraesWEE_scaffold_108165_01G000100.1">
    <property type="protein sequence ID" value="TraesWEE_scaffold_108165_01G000100.1"/>
    <property type="gene ID" value="TraesWEE_scaffold_108165_01G000100"/>
</dbReference>
<dbReference type="Gramene" id="TraesWEE_scaffold_111764_01G000100.1">
    <property type="protein sequence ID" value="TraesWEE_scaffold_111764_01G000100.1"/>
    <property type="gene ID" value="TraesWEE_scaffold_111764_01G000100"/>
</dbReference>
<dbReference type="Gramene" id="TraesWEE_scaffold_111829_01G000200.1">
    <property type="protein sequence ID" value="TraesWEE_scaffold_111829_01G000200.1"/>
    <property type="gene ID" value="TraesWEE_scaffold_111829_01G000200"/>
</dbReference>
<dbReference type="Gramene" id="TraesWEE_scaffold_114032_01G000100.1">
    <property type="protein sequence ID" value="TraesWEE_scaffold_114032_01G000100.1"/>
    <property type="gene ID" value="TraesWEE_scaffold_114032_01G000100"/>
</dbReference>
<dbReference type="Gramene" id="TraesWEE_scaffold_122262_01G000100.1">
    <property type="protein sequence ID" value="TraesWEE_scaffold_122262_01G000100.1"/>
    <property type="gene ID" value="TraesWEE_scaffold_122262_01G000100"/>
</dbReference>
<dbReference type="Gramene" id="TraesWEE_scaffold_134319_01G000100.1">
    <property type="protein sequence ID" value="TraesWEE_scaffold_134319_01G000100.1"/>
    <property type="gene ID" value="TraesWEE_scaffold_134319_01G000100"/>
</dbReference>
<dbReference type="Gramene" id="TraesWEE_scaffold_145896_01G000100.1">
    <property type="protein sequence ID" value="TraesWEE_scaffold_145896_01G000100.1"/>
    <property type="gene ID" value="TraesWEE_scaffold_145896_01G000100"/>
</dbReference>
<dbReference type="Gramene" id="TraesWEE_scaffold_155481_01G000300.1">
    <property type="protein sequence ID" value="TraesWEE_scaffold_155481_01G000300.1"/>
    <property type="gene ID" value="TraesWEE_scaffold_155481_01G000300"/>
</dbReference>
<dbReference type="Gramene" id="TraesWEE_scaffold_155911_01G000100.1">
    <property type="protein sequence ID" value="TraesWEE_scaffold_155911_01G000100.1"/>
    <property type="gene ID" value="TraesWEE_scaffold_155911_01G000100"/>
</dbReference>
<dbReference type="Gramene" id="TraesWEE_scaffold_164053_01G000100.1">
    <property type="protein sequence ID" value="TraesWEE_scaffold_164053_01G000100.1"/>
    <property type="gene ID" value="TraesWEE_scaffold_164053_01G000100"/>
</dbReference>
<dbReference type="Gramene" id="TraesWEE_scaffold_166798_01G000200.1">
    <property type="protein sequence ID" value="TraesWEE_scaffold_166798_01G000200.1"/>
    <property type="gene ID" value="TraesWEE_scaffold_166798_01G000200"/>
</dbReference>
<dbReference type="Gramene" id="TraesWEE_scaffold_169734_01G000200.1">
    <property type="protein sequence ID" value="TraesWEE_scaffold_169734_01G000200.1"/>
    <property type="gene ID" value="TraesWEE_scaffold_169734_01G000200"/>
</dbReference>
<dbReference type="Gramene" id="TraesWEE_scaffold_184138_01G000100.1">
    <property type="protein sequence ID" value="TraesWEE_scaffold_184138_01G000100.1"/>
    <property type="gene ID" value="TraesWEE_scaffold_184138_01G000100"/>
</dbReference>
<dbReference type="Gramene" id="TraesWEE_scaffold_864301_01G000100.1">
    <property type="protein sequence ID" value="TraesWEE_scaffold_864301_01G000100.1"/>
    <property type="gene ID" value="TraesWEE_scaffold_864301_01G000100"/>
</dbReference>
<dbReference type="eggNOG" id="KOG1745">
    <property type="taxonomic scope" value="Eukaryota"/>
</dbReference>
<dbReference type="HOGENOM" id="CLU_078295_4_0_1"/>
<dbReference type="OMA" id="ANDCAIH"/>
<dbReference type="OrthoDB" id="1861411at2759"/>
<dbReference type="Proteomes" id="UP000019116">
    <property type="component" value="Chromosome 1A"/>
</dbReference>
<dbReference type="Proteomes" id="UP000019116">
    <property type="component" value="Chromosome 1B"/>
</dbReference>
<dbReference type="Proteomes" id="UP000019116">
    <property type="component" value="Chromosome 1D"/>
</dbReference>
<dbReference type="Proteomes" id="UP000019116">
    <property type="component" value="Chromosome 2A"/>
</dbReference>
<dbReference type="Proteomes" id="UP000019116">
    <property type="component" value="Chromosome 2B"/>
</dbReference>
<dbReference type="Proteomes" id="UP000019116">
    <property type="component" value="Chromosome 2D"/>
</dbReference>
<dbReference type="Proteomes" id="UP000019116">
    <property type="component" value="Chromosome 3A"/>
</dbReference>
<dbReference type="Proteomes" id="UP000019116">
    <property type="component" value="Chromosome 3B"/>
</dbReference>
<dbReference type="Proteomes" id="UP000019116">
    <property type="component" value="Chromosome 3D"/>
</dbReference>
<dbReference type="Proteomes" id="UP000019116">
    <property type="component" value="Chromosome 4A"/>
</dbReference>
<dbReference type="Proteomes" id="UP000019116">
    <property type="component" value="Chromosome 4D"/>
</dbReference>
<dbReference type="Proteomes" id="UP000019116">
    <property type="component" value="Chromosome 5B"/>
</dbReference>
<dbReference type="Proteomes" id="UP000019116">
    <property type="component" value="Chromosome 5D"/>
</dbReference>
<dbReference type="Proteomes" id="UP000019116">
    <property type="component" value="Chromosome 6A"/>
</dbReference>
<dbReference type="Proteomes" id="UP000019116">
    <property type="component" value="Chromosome 6B"/>
</dbReference>
<dbReference type="Proteomes" id="UP000019116">
    <property type="component" value="Chromosome 6D"/>
</dbReference>
<dbReference type="Proteomes" id="UP000019116">
    <property type="component" value="Chromosome 7A"/>
</dbReference>
<dbReference type="Proteomes" id="UP000019116">
    <property type="component" value="Chromosome 7B"/>
</dbReference>
<dbReference type="Proteomes" id="UP000019116">
    <property type="component" value="Chromosome 7D"/>
</dbReference>
<dbReference type="Proteomes" id="UP000019116">
    <property type="component" value="Chromosome Un"/>
</dbReference>
<dbReference type="ExpressionAtlas" id="P68428">
    <property type="expression patterns" value="baseline and differential"/>
</dbReference>
<dbReference type="GO" id="GO:0000786">
    <property type="term" value="C:nucleosome"/>
    <property type="evidence" value="ECO:0007669"/>
    <property type="project" value="UniProtKB-KW"/>
</dbReference>
<dbReference type="GO" id="GO:0005634">
    <property type="term" value="C:nucleus"/>
    <property type="evidence" value="ECO:0000318"/>
    <property type="project" value="GO_Central"/>
</dbReference>
<dbReference type="GO" id="GO:0003677">
    <property type="term" value="F:DNA binding"/>
    <property type="evidence" value="ECO:0007669"/>
    <property type="project" value="UniProtKB-KW"/>
</dbReference>
<dbReference type="GO" id="GO:0046982">
    <property type="term" value="F:protein heterodimerization activity"/>
    <property type="evidence" value="ECO:0007669"/>
    <property type="project" value="InterPro"/>
</dbReference>
<dbReference type="GO" id="GO:0030527">
    <property type="term" value="F:structural constituent of chromatin"/>
    <property type="evidence" value="ECO:0007669"/>
    <property type="project" value="InterPro"/>
</dbReference>
<dbReference type="CDD" id="cd22911">
    <property type="entry name" value="HFD_H3"/>
    <property type="match status" value="1"/>
</dbReference>
<dbReference type="FunFam" id="1.10.20.10:FF:000078">
    <property type="entry name" value="Histone H3"/>
    <property type="match status" value="1"/>
</dbReference>
<dbReference type="FunFam" id="1.10.20.10:FF:000044">
    <property type="entry name" value="Histone H3.3"/>
    <property type="match status" value="1"/>
</dbReference>
<dbReference type="Gene3D" id="1.10.20.10">
    <property type="entry name" value="Histone, subunit A"/>
    <property type="match status" value="1"/>
</dbReference>
<dbReference type="InterPro" id="IPR009072">
    <property type="entry name" value="Histone-fold"/>
</dbReference>
<dbReference type="InterPro" id="IPR007125">
    <property type="entry name" value="Histone_H2A/H2B/H3"/>
</dbReference>
<dbReference type="InterPro" id="IPR000164">
    <property type="entry name" value="Histone_H3/CENP-A"/>
</dbReference>
<dbReference type="PANTHER" id="PTHR11426">
    <property type="entry name" value="HISTONE H3"/>
    <property type="match status" value="1"/>
</dbReference>
<dbReference type="Pfam" id="PF00125">
    <property type="entry name" value="Histone"/>
    <property type="match status" value="1"/>
</dbReference>
<dbReference type="PRINTS" id="PR00622">
    <property type="entry name" value="HISTONEH3"/>
</dbReference>
<dbReference type="SMART" id="SM00428">
    <property type="entry name" value="H3"/>
    <property type="match status" value="1"/>
</dbReference>
<dbReference type="SUPFAM" id="SSF47113">
    <property type="entry name" value="Histone-fold"/>
    <property type="match status" value="1"/>
</dbReference>
<dbReference type="PROSITE" id="PS00322">
    <property type="entry name" value="HISTONE_H3_1"/>
    <property type="match status" value="1"/>
</dbReference>
<dbReference type="PROSITE" id="PS00959">
    <property type="entry name" value="HISTONE_H3_2"/>
    <property type="match status" value="1"/>
</dbReference>
<organism>
    <name type="scientific">Triticum aestivum</name>
    <name type="common">Wheat</name>
    <dbReference type="NCBI Taxonomy" id="4565"/>
    <lineage>
        <taxon>Eukaryota</taxon>
        <taxon>Viridiplantae</taxon>
        <taxon>Streptophyta</taxon>
        <taxon>Embryophyta</taxon>
        <taxon>Tracheophyta</taxon>
        <taxon>Spermatophyta</taxon>
        <taxon>Magnoliopsida</taxon>
        <taxon>Liliopsida</taxon>
        <taxon>Poales</taxon>
        <taxon>Poaceae</taxon>
        <taxon>BOP clade</taxon>
        <taxon>Pooideae</taxon>
        <taxon>Triticodae</taxon>
        <taxon>Triticeae</taxon>
        <taxon>Triticinae</taxon>
        <taxon>Triticum</taxon>
    </lineage>
</organism>
<feature type="initiator methionine" description="Removed" evidence="3">
    <location>
        <position position="1"/>
    </location>
</feature>
<feature type="chain" id="PRO_0000221295" description="Histone H3.2">
    <location>
        <begin position="2"/>
        <end position="136"/>
    </location>
</feature>
<feature type="region of interest" description="Disordered" evidence="2">
    <location>
        <begin position="1"/>
        <end position="43"/>
    </location>
</feature>
<feature type="modified residue" description="N6-methylated lysine" evidence="1">
    <location>
        <position position="5"/>
    </location>
</feature>
<feature type="modified residue" description="N6-acetyllysine; alternate" evidence="1">
    <location>
        <position position="10"/>
    </location>
</feature>
<feature type="modified residue" description="N6-methylated lysine; alternate" evidence="1">
    <location>
        <position position="10"/>
    </location>
</feature>
<feature type="modified residue" description="Phosphoserine" evidence="1">
    <location>
        <position position="11"/>
    </location>
</feature>
<feature type="modified residue" description="Phosphothreonine" evidence="1">
    <location>
        <position position="12"/>
    </location>
</feature>
<feature type="modified residue" description="N6-acetyllysine" evidence="1">
    <location>
        <position position="15"/>
    </location>
</feature>
<feature type="modified residue" description="N6-acetyllysine; alternate" evidence="1">
    <location>
        <position position="19"/>
    </location>
</feature>
<feature type="modified residue" description="N6-methylated lysine; alternate" evidence="1">
    <location>
        <position position="19"/>
    </location>
</feature>
<feature type="modified residue" description="N6-acetyllysine; alternate" evidence="1">
    <location>
        <position position="24"/>
    </location>
</feature>
<feature type="modified residue" description="N6-methylated lysine; alternate" evidence="1">
    <location>
        <position position="24"/>
    </location>
</feature>
<feature type="modified residue" description="N6-methylated lysine" evidence="1">
    <location>
        <position position="28"/>
    </location>
</feature>
<feature type="modified residue" description="Phosphoserine" evidence="1">
    <location>
        <position position="29"/>
    </location>
</feature>
<feature type="modified residue" description="N6-methylated lysine" evidence="1">
    <location>
        <position position="37"/>
    </location>
</feature>
<name>H32_WHEAT</name>
<reference key="1">
    <citation type="journal article" date="1984" name="Mol. Gen. Genet.">
        <title>Nucleotide sequence and genomic organization of a wheat histone H3 gene.</title>
        <authorList>
            <person name="Tabata T."/>
            <person name="Fukasawa M."/>
            <person name="Iwabuchi M."/>
        </authorList>
    </citation>
    <scope>NUCLEOTIDE SEQUENCE [GENOMIC DNA]</scope>
</reference>
<reference key="2">
    <citation type="journal article" date="1988" name="Biol. Chem. Hoppe-Seyler">
        <title>The primary structure of histone H3 from wheat.</title>
        <authorList>
            <person name="Modro A.M."/>
            <person name="Rodrigues J.A."/>
            <person name="Brandt W.F."/>
            <person name="von Holt C."/>
        </authorList>
    </citation>
    <scope>PROTEIN SEQUENCE OF 2-136</scope>
    <source>
        <tissue>Embryo</tissue>
    </source>
</reference>
<proteinExistence type="evidence at protein level"/>
<accession>P68428</accession>
<accession>P02300</accession>
<evidence type="ECO:0000250" key="1"/>
<evidence type="ECO:0000256" key="2">
    <source>
        <dbReference type="SAM" id="MobiDB-lite"/>
    </source>
</evidence>
<evidence type="ECO:0000269" key="3">
    <source>
    </source>
</evidence>
<evidence type="ECO:0000305" key="4"/>
<keyword id="KW-0007">Acetylation</keyword>
<keyword id="KW-0158">Chromosome</keyword>
<keyword id="KW-0903">Direct protein sequencing</keyword>
<keyword id="KW-0238">DNA-binding</keyword>
<keyword id="KW-0488">Methylation</keyword>
<keyword id="KW-0544">Nucleosome core</keyword>
<keyword id="KW-0539">Nucleus</keyword>
<keyword id="KW-0597">Phosphoprotein</keyword>
<keyword id="KW-1185">Reference proteome</keyword>